<feature type="chain" id="PRO_0000455520" description="Putative ORF10 protein">
    <location>
        <begin position="1"/>
        <end position="38"/>
    </location>
</feature>
<organism evidence="6 9">
    <name type="scientific">Severe acute respiratory syndrome coronavirus 2</name>
    <name type="common">2019-nCoV</name>
    <name type="synonym">SARS-CoV-2</name>
    <dbReference type="NCBI Taxonomy" id="2697049"/>
    <lineage>
        <taxon>Viruses</taxon>
        <taxon>Riboviria</taxon>
        <taxon>Orthornavirae</taxon>
        <taxon>Pisuviricota</taxon>
        <taxon>Pisoniviricetes</taxon>
        <taxon>Nidovirales</taxon>
        <taxon>Cornidovirineae</taxon>
        <taxon>Coronaviridae</taxon>
        <taxon>Orthocoronavirinae</taxon>
        <taxon>Betacoronavirus</taxon>
        <taxon>Sarbecovirus</taxon>
        <taxon>Severe acute respiratory syndrome coronavirus</taxon>
    </lineage>
</organism>
<gene>
    <name evidence="6" type="primary">ORF10</name>
</gene>
<comment type="subunit">
    <text evidence="3 4">Binds host ZYG11B. This would not play any role in SARS-CoV-2 infection.</text>
</comment>
<comment type="interaction">
    <interactant intactId="EBI-25475906">
        <id>A0A663DJA2</id>
    </interactant>
    <interactant intactId="EBI-849893">
        <id>O60238</id>
        <label>BNIP3L</label>
    </interactant>
    <organismsDiffer>true</organismsDiffer>
    <experiments>4</experiments>
</comment>
<comment type="interaction">
    <interactant intactId="EBI-25475906">
        <id>A0A663DJA2</id>
    </interactant>
    <interactant intactId="EBI-301231">
        <id>Q15369</id>
        <label>ELOC</label>
    </interactant>
    <organismsDiffer>true</organismsDiffer>
    <experiments>4</experiments>
</comment>
<comment type="caution">
    <text evidence="1 2 3">Could be the product of a pseudogene. Probably does not encode a functional protein. No subgenomic RNA was detected that could encode the protein (PubMed:33722935). It has been shown to be non-essential in vivo and in vitro (PubMed:33301543). There are no similar proteins in other betacoronavirus (PubMed:33301543).</text>
</comment>
<accession>A0A663DJA2</accession>
<proteinExistence type="uncertain"/>
<dbReference type="EMBL" id="MN908947">
    <property type="protein sequence ID" value="QHI42199.1"/>
    <property type="molecule type" value="Genomic_RNA"/>
</dbReference>
<dbReference type="EMBL" id="MT077125">
    <property type="protein sequence ID" value="QIC50506.1"/>
    <property type="molecule type" value="Genomic_RNA"/>
</dbReference>
<dbReference type="EMBL" id="MT276600">
    <property type="protein sequence ID" value="QIT07020.1"/>
    <property type="molecule type" value="Genomic_RNA"/>
</dbReference>
<dbReference type="EMBL" id="MT215193">
    <property type="protein sequence ID" value="QIT08265.1"/>
    <property type="molecule type" value="Genomic_RNA"/>
</dbReference>
<dbReference type="EMBL" id="MT215194">
    <property type="protein sequence ID" value="QIT08277.1"/>
    <property type="molecule type" value="Genomic_RNA"/>
</dbReference>
<dbReference type="EMBL" id="MT215195">
    <property type="protein sequence ID" value="QIT08289.1"/>
    <property type="molecule type" value="Genomic_RNA"/>
</dbReference>
<dbReference type="EMBL" id="MT270814">
    <property type="protein sequence ID" value="QIT08301.1"/>
    <property type="molecule type" value="Genomic_RNA"/>
</dbReference>
<dbReference type="EMBL" id="MT270815">
    <property type="protein sequence ID" value="QIT08313.1"/>
    <property type="molecule type" value="Genomic_RNA"/>
</dbReference>
<dbReference type="EMBL" id="MT079843">
    <property type="protein sequence ID" value="QIU81947.1"/>
    <property type="molecule type" value="Genomic_RNA"/>
</dbReference>
<dbReference type="EMBL" id="MT079844">
    <property type="protein sequence ID" value="QIU81959.1"/>
    <property type="molecule type" value="Genomic_RNA"/>
</dbReference>
<dbReference type="EMBL" id="MT079845">
    <property type="protein sequence ID" value="QIU81971.1"/>
    <property type="molecule type" value="Genomic_RNA"/>
</dbReference>
<dbReference type="EMBL" id="MT079846">
    <property type="protein sequence ID" value="QIU81983.1"/>
    <property type="molecule type" value="Genomic_RNA"/>
</dbReference>
<dbReference type="EMBL" id="MT079847">
    <property type="protein sequence ID" value="QIU81995.1"/>
    <property type="molecule type" value="Genomic_RNA"/>
</dbReference>
<dbReference type="EMBL" id="MT079848">
    <property type="protein sequence ID" value="QIU82007.1"/>
    <property type="molecule type" value="Genomic_RNA"/>
</dbReference>
<dbReference type="EMBL" id="MT079849">
    <property type="protein sequence ID" value="QIU82019.1"/>
    <property type="molecule type" value="Genomic_RNA"/>
</dbReference>
<dbReference type="EMBL" id="MT079850">
    <property type="protein sequence ID" value="QIU82031.1"/>
    <property type="molecule type" value="Genomic_RNA"/>
</dbReference>
<dbReference type="EMBL" id="MT079851">
    <property type="protein sequence ID" value="QIU82043.1"/>
    <property type="molecule type" value="Genomic_RNA"/>
</dbReference>
<dbReference type="EMBL" id="MT079852">
    <property type="protein sequence ID" value="QIU82055.1"/>
    <property type="molecule type" value="Genomic_RNA"/>
</dbReference>
<dbReference type="EMBL" id="MT079853">
    <property type="protein sequence ID" value="QIU82067.1"/>
    <property type="molecule type" value="Genomic_RNA"/>
</dbReference>
<dbReference type="EMBL" id="MT079854">
    <property type="protein sequence ID" value="QIU82079.1"/>
    <property type="molecule type" value="Genomic_RNA"/>
</dbReference>
<dbReference type="EMBL" id="MT318827">
    <property type="protein sequence ID" value="QIX07440.1"/>
    <property type="molecule type" value="Genomic_RNA"/>
</dbReference>
<dbReference type="EMBL" id="MT039874">
    <property type="protein sequence ID" value="QIX14045.1"/>
    <property type="molecule type" value="Genomic_RNA"/>
</dbReference>
<dbReference type="EMBL" id="MT324684">
    <property type="protein sequence ID" value="QIZ15006.1"/>
    <property type="molecule type" value="Genomic_RNA"/>
</dbReference>
<dbReference type="EMBL" id="MT339039">
    <property type="protein sequence ID" value="QIZ97048.1"/>
    <property type="molecule type" value="Genomic_RNA"/>
</dbReference>
<dbReference type="EMBL" id="MT339040">
    <property type="protein sequence ID" value="QIZ97059.1"/>
    <property type="molecule type" value="Genomic_RNA"/>
</dbReference>
<dbReference type="EMBL" id="MT339041">
    <property type="protein sequence ID" value="QIZ97071.1"/>
    <property type="molecule type" value="Genomic_RNA"/>
</dbReference>
<dbReference type="EMBL" id="MT230904">
    <property type="protein sequence ID" value="QJC21002.1"/>
    <property type="molecule type" value="Genomic_RNA"/>
</dbReference>
<dbReference type="EMBL" id="MT365025">
    <property type="protein sequence ID" value="QJD07601.1"/>
    <property type="molecule type" value="Genomic_RNA"/>
</dbReference>
<dbReference type="EMBL" id="MT365026">
    <property type="protein sequence ID" value="QJD07613.1"/>
    <property type="molecule type" value="Genomic_RNA"/>
</dbReference>
<dbReference type="EMBL" id="MT365027">
    <property type="protein sequence ID" value="QJD07625.1"/>
    <property type="molecule type" value="Genomic_RNA"/>
</dbReference>
<dbReference type="EMBL" id="MT374101">
    <property type="protein sequence ID" value="QJD47725.1"/>
    <property type="molecule type" value="Genomic_RNA"/>
</dbReference>
<dbReference type="EMBL" id="MT374102">
    <property type="protein sequence ID" value="QJD47737.1"/>
    <property type="molecule type" value="Genomic_RNA"/>
</dbReference>
<dbReference type="EMBL" id="MT374103">
    <property type="protein sequence ID" value="QJD47749.1"/>
    <property type="molecule type" value="Genomic_RNA"/>
</dbReference>
<dbReference type="EMBL" id="MT374104">
    <property type="protein sequence ID" value="QJD47761.1"/>
    <property type="molecule type" value="Genomic_RNA"/>
</dbReference>
<dbReference type="EMBL" id="MT374105">
    <property type="protein sequence ID" value="QJD47773.1"/>
    <property type="molecule type" value="Genomic_RNA"/>
</dbReference>
<dbReference type="EMBL" id="MT374106">
    <property type="protein sequence ID" value="QJD47785.1"/>
    <property type="molecule type" value="Genomic_RNA"/>
</dbReference>
<dbReference type="EMBL" id="MT374107">
    <property type="protein sequence ID" value="QJD47797.1"/>
    <property type="molecule type" value="Genomic_RNA"/>
</dbReference>
<dbReference type="EMBL" id="MT374108">
    <property type="protein sequence ID" value="QJD47809.1"/>
    <property type="molecule type" value="Genomic_RNA"/>
</dbReference>
<dbReference type="EMBL" id="MT374109">
    <property type="protein sequence ID" value="QJD47821.1"/>
    <property type="molecule type" value="Genomic_RNA"/>
</dbReference>
<dbReference type="EMBL" id="MT374110">
    <property type="protein sequence ID" value="QJD47833.1"/>
    <property type="molecule type" value="Genomic_RNA"/>
</dbReference>
<dbReference type="EMBL" id="MT374111">
    <property type="protein sequence ID" value="QJD47845.1"/>
    <property type="molecule type" value="Genomic_RNA"/>
</dbReference>
<dbReference type="EMBL" id="MT374112">
    <property type="protein sequence ID" value="QJD47857.1"/>
    <property type="molecule type" value="Genomic_RNA"/>
</dbReference>
<dbReference type="EMBL" id="MT374113">
    <property type="protein sequence ID" value="QJD47869.1"/>
    <property type="molecule type" value="Genomic_RNA"/>
</dbReference>
<dbReference type="EMBL" id="MT374114">
    <property type="protein sequence ID" value="QJD47881.1"/>
    <property type="molecule type" value="Genomic_RNA"/>
</dbReference>
<dbReference type="EMBL" id="MT374115">
    <property type="protein sequence ID" value="QJD47893.1"/>
    <property type="molecule type" value="Genomic_RNA"/>
</dbReference>
<dbReference type="EMBL" id="MT374116">
    <property type="protein sequence ID" value="QJD47905.1"/>
    <property type="molecule type" value="Genomic_RNA"/>
</dbReference>
<dbReference type="EMBL" id="MT186683">
    <property type="protein sequence ID" value="QJD49277.1"/>
    <property type="molecule type" value="Genomic_RNA"/>
</dbReference>
<dbReference type="EMBL" id="MT446312">
    <property type="protein sequence ID" value="QJQ84097.1"/>
    <property type="molecule type" value="Genomic_RNA"/>
</dbReference>
<dbReference type="EMBL" id="MT476384">
    <property type="protein sequence ID" value="QJU11809.1"/>
    <property type="molecule type" value="Genomic_RNA"/>
</dbReference>
<dbReference type="EMBL" id="MT270101">
    <property type="protein sequence ID" value="QJW69160.1"/>
    <property type="molecule type" value="Genomic_RNA"/>
</dbReference>
<dbReference type="EMBL" id="MT270102">
    <property type="protein sequence ID" value="QJW69172.1"/>
    <property type="molecule type" value="Genomic_RNA"/>
</dbReference>
<dbReference type="EMBL" id="MT270103">
    <property type="protein sequence ID" value="QJW69184.1"/>
    <property type="molecule type" value="Genomic_RNA"/>
</dbReference>
<dbReference type="EMBL" id="MT270104">
    <property type="protein sequence ID" value="QJW69196.1"/>
    <property type="molecule type" value="Genomic_RNA"/>
</dbReference>
<dbReference type="EMBL" id="MT270105">
    <property type="protein sequence ID" value="QJW69208.1"/>
    <property type="molecule type" value="Genomic_RNA"/>
</dbReference>
<dbReference type="EMBL" id="MT270106">
    <property type="protein sequence ID" value="QJW69220.1"/>
    <property type="molecule type" value="Genomic_RNA"/>
</dbReference>
<dbReference type="EMBL" id="MT270107">
    <property type="protein sequence ID" value="QJW69232.1"/>
    <property type="molecule type" value="Genomic_RNA"/>
</dbReference>
<dbReference type="EMBL" id="MT270108">
    <property type="protein sequence ID" value="QJW69244.1"/>
    <property type="molecule type" value="Genomic_RNA"/>
</dbReference>
<dbReference type="EMBL" id="MT270109">
    <property type="protein sequence ID" value="QJW69256.1"/>
    <property type="molecule type" value="Genomic_RNA"/>
</dbReference>
<dbReference type="EMBL" id="MT270110">
    <property type="protein sequence ID" value="QJW69268.1"/>
    <property type="molecule type" value="Genomic_RNA"/>
</dbReference>
<dbReference type="EMBL" id="MT270111">
    <property type="protein sequence ID" value="QJW69280.1"/>
    <property type="molecule type" value="Genomic_RNA"/>
</dbReference>
<dbReference type="EMBL" id="MT270112">
    <property type="protein sequence ID" value="QJW69292.1"/>
    <property type="molecule type" value="Genomic_RNA"/>
</dbReference>
<dbReference type="EMBL" id="MT270113">
    <property type="protein sequence ID" value="QJW69304.1"/>
    <property type="molecule type" value="Genomic_RNA"/>
</dbReference>
<dbReference type="EMBL" id="MT270114">
    <property type="protein sequence ID" value="QJW69316.1"/>
    <property type="molecule type" value="Genomic_RNA"/>
</dbReference>
<dbReference type="EMBL" id="MT232662">
    <property type="protein sequence ID" value="QJW69362.1"/>
    <property type="molecule type" value="Genomic_RNA"/>
</dbReference>
<dbReference type="EMBL" id="MT232663">
    <property type="protein sequence ID" value="QJW69374.1"/>
    <property type="molecule type" value="Genomic_RNA"/>
</dbReference>
<dbReference type="EMBL" id="MT232664">
    <property type="protein sequence ID" value="QJW69386.1"/>
    <property type="molecule type" value="Genomic_RNA"/>
</dbReference>
<dbReference type="EMBL" id="MT232665">
    <property type="protein sequence ID" value="QJW69398.1"/>
    <property type="molecule type" value="Genomic_RNA"/>
</dbReference>
<dbReference type="EMBL" id="MT232666">
    <property type="protein sequence ID" value="QJW69410.1"/>
    <property type="molecule type" value="Genomic_RNA"/>
</dbReference>
<dbReference type="EMBL" id="MT232667">
    <property type="protein sequence ID" value="QJW69422.1"/>
    <property type="molecule type" value="Genomic_RNA"/>
</dbReference>
<dbReference type="EMBL" id="MT232668">
    <property type="protein sequence ID" value="QJW69434.1"/>
    <property type="molecule type" value="Genomic_RNA"/>
</dbReference>
<dbReference type="EMBL" id="MT232669">
    <property type="protein sequence ID" value="QJW69446.1"/>
    <property type="molecule type" value="Genomic_RNA"/>
</dbReference>
<dbReference type="EMBL" id="MT232670">
    <property type="protein sequence ID" value="QJW69458.1"/>
    <property type="molecule type" value="Genomic_RNA"/>
</dbReference>
<dbReference type="EMBL" id="MT232671">
    <property type="protein sequence ID" value="QJW69470.1"/>
    <property type="molecule type" value="Genomic_RNA"/>
</dbReference>
<dbReference type="EMBL" id="MT232672">
    <property type="protein sequence ID" value="QJW69482.1"/>
    <property type="molecule type" value="Genomic_RNA"/>
</dbReference>
<dbReference type="EMBL" id="MT232673">
    <property type="protein sequence ID" value="QJW69494.1"/>
    <property type="molecule type" value="Genomic_RNA"/>
</dbReference>
<dbReference type="EMBL" id="MT232674">
    <property type="protein sequence ID" value="QJW69506.1"/>
    <property type="molecule type" value="Genomic_RNA"/>
</dbReference>
<dbReference type="EMBL" id="MT232675">
    <property type="protein sequence ID" value="QJW69518.1"/>
    <property type="molecule type" value="Genomic_RNA"/>
</dbReference>
<dbReference type="EMBL" id="MT232676">
    <property type="protein sequence ID" value="QJW69530.1"/>
    <property type="molecule type" value="Genomic_RNA"/>
</dbReference>
<dbReference type="EMBL" id="MT232677">
    <property type="protein sequence ID" value="QJW69542.1"/>
    <property type="molecule type" value="Genomic_RNA"/>
</dbReference>
<dbReference type="EMBL" id="MT232678">
    <property type="protein sequence ID" value="QJW69554.1"/>
    <property type="molecule type" value="Genomic_RNA"/>
</dbReference>
<dbReference type="EMBL" id="MT232679">
    <property type="protein sequence ID" value="QJW69566.1"/>
    <property type="molecule type" value="Genomic_RNA"/>
</dbReference>
<dbReference type="EMBL" id="MT232680">
    <property type="protein sequence ID" value="QJW69578.1"/>
    <property type="molecule type" value="Genomic_RNA"/>
</dbReference>
<dbReference type="EMBL" id="MT232681">
    <property type="protein sequence ID" value="QJW69590.1"/>
    <property type="molecule type" value="Genomic_RNA"/>
</dbReference>
<dbReference type="EMBL" id="MT232682">
    <property type="protein sequence ID" value="QJW69602.1"/>
    <property type="molecule type" value="Genomic_RNA"/>
</dbReference>
<dbReference type="EMBL" id="MT232683">
    <property type="protein sequence ID" value="QJW69614.1"/>
    <property type="molecule type" value="Genomic_RNA"/>
</dbReference>
<dbReference type="EMBL" id="MT232684">
    <property type="protein sequence ID" value="QJW69626.1"/>
    <property type="molecule type" value="Genomic_RNA"/>
</dbReference>
<dbReference type="EMBL" id="MT232685">
    <property type="protein sequence ID" value="QJW69638.1"/>
    <property type="molecule type" value="Genomic_RNA"/>
</dbReference>
<dbReference type="EMBL" id="MT232686">
    <property type="protein sequence ID" value="QJW69650.1"/>
    <property type="molecule type" value="Genomic_RNA"/>
</dbReference>
<dbReference type="EMBL" id="MT232687">
    <property type="protein sequence ID" value="QJW69662.1"/>
    <property type="molecule type" value="Genomic_RNA"/>
</dbReference>
<dbReference type="EMBL" id="MT232688">
    <property type="protein sequence ID" value="QJW69674.1"/>
    <property type="molecule type" value="Genomic_RNA"/>
</dbReference>
<dbReference type="EMBL" id="MT232689">
    <property type="protein sequence ID" value="QJW69686.1"/>
    <property type="molecule type" value="Genomic_RNA"/>
</dbReference>
<dbReference type="EMBL" id="MT232690">
    <property type="protein sequence ID" value="QJW69698.1"/>
    <property type="molecule type" value="Genomic_RNA"/>
</dbReference>
<dbReference type="EMBL" id="MT232691">
    <property type="protein sequence ID" value="QJW69710.1"/>
    <property type="molecule type" value="Genomic_RNA"/>
</dbReference>
<dbReference type="EMBL" id="MT232692">
    <property type="protein sequence ID" value="QJW69722.1"/>
    <property type="molecule type" value="Genomic_RNA"/>
</dbReference>
<dbReference type="EMBL" id="MT232693">
    <property type="protein sequence ID" value="QJW69734.1"/>
    <property type="molecule type" value="Genomic_RNA"/>
</dbReference>
<dbReference type="EMBL" id="MT232694">
    <property type="protein sequence ID" value="QJW69746.1"/>
    <property type="molecule type" value="Genomic_RNA"/>
</dbReference>
<dbReference type="EMBL" id="MT232695">
    <property type="protein sequence ID" value="QJW69758.1"/>
    <property type="molecule type" value="Genomic_RNA"/>
</dbReference>
<dbReference type="EMBL" id="MT232696">
    <property type="protein sequence ID" value="QJW69770.1"/>
    <property type="molecule type" value="Genomic_RNA"/>
</dbReference>
<dbReference type="EMBL" id="MT232697">
    <property type="protein sequence ID" value="QJW69782.1"/>
    <property type="molecule type" value="Genomic_RNA"/>
</dbReference>
<dbReference type="EMBL" id="MT232698">
    <property type="protein sequence ID" value="QJW69794.1"/>
    <property type="molecule type" value="Genomic_RNA"/>
</dbReference>
<dbReference type="EMBL" id="MT232699">
    <property type="protein sequence ID" value="QJW69806.1"/>
    <property type="molecule type" value="Genomic_RNA"/>
</dbReference>
<dbReference type="EMBL" id="MT232700">
    <property type="protein sequence ID" value="QJW69818.1"/>
    <property type="molecule type" value="Genomic_RNA"/>
</dbReference>
<dbReference type="EMBL" id="MT232701">
    <property type="protein sequence ID" value="QJW69830.1"/>
    <property type="molecule type" value="Genomic_RNA"/>
</dbReference>
<dbReference type="EMBL" id="MT232702">
    <property type="protein sequence ID" value="QJW69842.1"/>
    <property type="molecule type" value="Genomic_RNA"/>
</dbReference>
<dbReference type="EMBL" id="MT232703">
    <property type="protein sequence ID" value="QJW69854.1"/>
    <property type="molecule type" value="Genomic_RNA"/>
</dbReference>
<dbReference type="EMBL" id="MT232704">
    <property type="protein sequence ID" value="QJW69866.1"/>
    <property type="molecule type" value="Genomic_RNA"/>
</dbReference>
<dbReference type="EMBL" id="MT232705">
    <property type="protein sequence ID" value="QJW69878.1"/>
    <property type="molecule type" value="Genomic_RNA"/>
</dbReference>
<dbReference type="EMBL" id="MT232706">
    <property type="protein sequence ID" value="QJW69890.1"/>
    <property type="molecule type" value="Genomic_RNA"/>
</dbReference>
<dbReference type="EMBL" id="MT232707">
    <property type="protein sequence ID" value="QJW69902.1"/>
    <property type="molecule type" value="Genomic_RNA"/>
</dbReference>
<dbReference type="EMBL" id="MT232708">
    <property type="protein sequence ID" value="QJW69914.1"/>
    <property type="molecule type" value="Genomic_RNA"/>
</dbReference>
<dbReference type="EMBL" id="MT232709">
    <property type="protein sequence ID" value="QJW69926.1"/>
    <property type="molecule type" value="Genomic_RNA"/>
</dbReference>
<dbReference type="EMBL" id="MT232710">
    <property type="protein sequence ID" value="QJW69938.1"/>
    <property type="molecule type" value="Genomic_RNA"/>
</dbReference>
<dbReference type="EMBL" id="MT232711">
    <property type="protein sequence ID" value="QJW69950.1"/>
    <property type="molecule type" value="Genomic_RNA"/>
</dbReference>
<dbReference type="EMBL" id="MT510718">
    <property type="protein sequence ID" value="QJY78197.1"/>
    <property type="molecule type" value="Genomic_RNA"/>
</dbReference>
<dbReference type="EMBL" id="MT510719">
    <property type="protein sequence ID" value="QJY78209.1"/>
    <property type="molecule type" value="Genomic_RNA"/>
</dbReference>
<dbReference type="EMBL" id="MT510720">
    <property type="protein sequence ID" value="QJY78221.1"/>
    <property type="molecule type" value="Genomic_RNA"/>
</dbReference>
<dbReference type="EMBL" id="MT510722">
    <property type="protein sequence ID" value="QJY78245.1"/>
    <property type="molecule type" value="Genomic_RNA"/>
</dbReference>
<dbReference type="EMBL" id="MT510723">
    <property type="protein sequence ID" value="QJY78257.1"/>
    <property type="molecule type" value="Genomic_RNA"/>
</dbReference>
<dbReference type="EMBL" id="MT510725">
    <property type="protein sequence ID" value="QJY78280.1"/>
    <property type="molecule type" value="Genomic_RNA"/>
</dbReference>
<dbReference type="EMBL" id="MT510726">
    <property type="protein sequence ID" value="QJY78292.1"/>
    <property type="molecule type" value="Genomic_RNA"/>
</dbReference>
<dbReference type="EMBL" id="MT407649">
    <property type="protein sequence ID" value="QKE23228.1"/>
    <property type="molecule type" value="Genomic_RNA"/>
</dbReference>
<dbReference type="EMBL" id="MT407650">
    <property type="protein sequence ID" value="QKE23240.1"/>
    <property type="molecule type" value="Genomic_RNA"/>
</dbReference>
<dbReference type="EMBL" id="MT407651">
    <property type="protein sequence ID" value="QKE23252.1"/>
    <property type="molecule type" value="Genomic_RNA"/>
</dbReference>
<dbReference type="EMBL" id="MT407652">
    <property type="protein sequence ID" value="QKE23264.1"/>
    <property type="molecule type" value="Genomic_RNA"/>
</dbReference>
<dbReference type="EMBL" id="MT407653">
    <property type="protein sequence ID" value="QKE23276.1"/>
    <property type="molecule type" value="Genomic_RNA"/>
</dbReference>
<dbReference type="EMBL" id="MT407654">
    <property type="protein sequence ID" value="QKE23288.1"/>
    <property type="molecule type" value="Genomic_RNA"/>
</dbReference>
<dbReference type="EMBL" id="MT407655">
    <property type="protein sequence ID" value="QKE23300.1"/>
    <property type="molecule type" value="Genomic_RNA"/>
</dbReference>
<dbReference type="EMBL" id="MT407656">
    <property type="protein sequence ID" value="QKE23312.1"/>
    <property type="molecule type" value="Genomic_RNA"/>
</dbReference>
<dbReference type="EMBL" id="MT407657">
    <property type="protein sequence ID" value="QKE23324.1"/>
    <property type="molecule type" value="Genomic_RNA"/>
</dbReference>
<dbReference type="EMBL" id="MT407658">
    <property type="protein sequence ID" value="QKE23336.1"/>
    <property type="molecule type" value="Genomic_RNA"/>
</dbReference>
<dbReference type="EMBL" id="MT407659">
    <property type="protein sequence ID" value="QKE23348.1"/>
    <property type="molecule type" value="Genomic_RNA"/>
</dbReference>
<dbReference type="EMBL" id="MT525950">
    <property type="protein sequence ID" value="QKE32985.1"/>
    <property type="molecule type" value="Genomic_RNA"/>
</dbReference>
<dbReference type="EMBL" id="MT527178">
    <property type="protein sequence ID" value="QKE43676.1"/>
    <property type="molecule type" value="Genomic_RNA"/>
</dbReference>
<dbReference type="EMBL" id="MT527184">
    <property type="protein sequence ID" value="QKE43688.1"/>
    <property type="molecule type" value="Genomic_RNA"/>
</dbReference>
<dbReference type="EMBL" id="MT528235">
    <property type="protein sequence ID" value="QKE43700.1"/>
    <property type="molecule type" value="Genomic_RNA"/>
</dbReference>
<dbReference type="EMBL" id="MT528237">
    <property type="protein sequence ID" value="QKE43712.1"/>
    <property type="molecule type" value="Genomic_RNA"/>
</dbReference>
<dbReference type="EMBL" id="MT528238">
    <property type="protein sequence ID" value="QKE43724.1"/>
    <property type="molecule type" value="Genomic_RNA"/>
</dbReference>
<dbReference type="EMBL" id="MT528239">
    <property type="protein sequence ID" value="QKE43736.1"/>
    <property type="molecule type" value="Genomic_RNA"/>
</dbReference>
<dbReference type="EMBL" id="MT635200">
    <property type="protein sequence ID" value="QKV25066.1"/>
    <property type="molecule type" value="Genomic_RNA"/>
</dbReference>
<dbReference type="EMBL" id="MT635201">
    <property type="protein sequence ID" value="QKV25078.1"/>
    <property type="molecule type" value="Genomic_RNA"/>
</dbReference>
<dbReference type="EMBL" id="MT635202">
    <property type="protein sequence ID" value="QKV25090.1"/>
    <property type="molecule type" value="Genomic_RNA"/>
</dbReference>
<dbReference type="EMBL" id="MT635203">
    <property type="protein sequence ID" value="QKV25102.1"/>
    <property type="molecule type" value="Genomic_RNA"/>
</dbReference>
<dbReference type="EMBL" id="MT635204">
    <property type="protein sequence ID" value="QKV25114.1"/>
    <property type="molecule type" value="Genomic_RNA"/>
</dbReference>
<dbReference type="EMBL" id="MT635205">
    <property type="protein sequence ID" value="QKV25126.1"/>
    <property type="molecule type" value="Genomic_RNA"/>
</dbReference>
<dbReference type="EMBL" id="MT635206">
    <property type="protein sequence ID" value="QKV25138.1"/>
    <property type="molecule type" value="Genomic_RNA"/>
</dbReference>
<dbReference type="EMBL" id="MT635207">
    <property type="protein sequence ID" value="QKV25150.1"/>
    <property type="molecule type" value="Genomic_RNA"/>
</dbReference>
<dbReference type="EMBL" id="MT635208">
    <property type="protein sequence ID" value="QKV25162.1"/>
    <property type="molecule type" value="Genomic_RNA"/>
</dbReference>
<dbReference type="EMBL" id="MT635209">
    <property type="protein sequence ID" value="QKV25174.1"/>
    <property type="molecule type" value="Genomic_RNA"/>
</dbReference>
<dbReference type="EMBL" id="MT635210">
    <property type="protein sequence ID" value="QKV25186.1"/>
    <property type="molecule type" value="Genomic_RNA"/>
</dbReference>
<dbReference type="EMBL" id="MT635211">
    <property type="protein sequence ID" value="QKV25198.1"/>
    <property type="molecule type" value="Genomic_RNA"/>
</dbReference>
<dbReference type="EMBL" id="MT635212">
    <property type="protein sequence ID" value="QKV25210.1"/>
    <property type="molecule type" value="Genomic_RNA"/>
</dbReference>
<dbReference type="EMBL" id="MT635213">
    <property type="protein sequence ID" value="QKV25222.1"/>
    <property type="molecule type" value="Genomic_RNA"/>
</dbReference>
<dbReference type="EMBL" id="MT635214">
    <property type="protein sequence ID" value="QKV25234.1"/>
    <property type="molecule type" value="Genomic_RNA"/>
</dbReference>
<dbReference type="EMBL" id="MT635215">
    <property type="protein sequence ID" value="QKV25246.1"/>
    <property type="molecule type" value="Genomic_RNA"/>
</dbReference>
<dbReference type="EMBL" id="MT635216">
    <property type="protein sequence ID" value="QKV25258.1"/>
    <property type="molecule type" value="Genomic_RNA"/>
</dbReference>
<dbReference type="EMBL" id="MT635217">
    <property type="protein sequence ID" value="QKV25270.1"/>
    <property type="molecule type" value="Genomic_RNA"/>
</dbReference>
<dbReference type="EMBL" id="MT635218">
    <property type="protein sequence ID" value="QKV25282.1"/>
    <property type="molecule type" value="Genomic_RNA"/>
</dbReference>
<dbReference type="EMBL" id="MT635219">
    <property type="protein sequence ID" value="QKV25294.1"/>
    <property type="molecule type" value="Genomic_RNA"/>
</dbReference>
<dbReference type="EMBL" id="MT635220">
    <property type="protein sequence ID" value="QKV25306.1"/>
    <property type="molecule type" value="Genomic_RNA"/>
</dbReference>
<dbReference type="EMBL" id="MT635221">
    <property type="protein sequence ID" value="QKV25318.1"/>
    <property type="molecule type" value="Genomic_RNA"/>
</dbReference>
<dbReference type="EMBL" id="MT635222">
    <property type="protein sequence ID" value="QKV25330.1"/>
    <property type="molecule type" value="Genomic_RNA"/>
</dbReference>
<dbReference type="EMBL" id="MT635223">
    <property type="protein sequence ID" value="QKV25342.1"/>
    <property type="molecule type" value="Genomic_RNA"/>
</dbReference>
<dbReference type="EMBL" id="MT635224">
    <property type="protein sequence ID" value="QKV25354.1"/>
    <property type="molecule type" value="Genomic_RNA"/>
</dbReference>
<dbReference type="EMBL" id="MT635225">
    <property type="protein sequence ID" value="QKV25366.1"/>
    <property type="molecule type" value="Genomic_RNA"/>
</dbReference>
<dbReference type="EMBL" id="MT635226">
    <property type="protein sequence ID" value="QKV25378.1"/>
    <property type="molecule type" value="Genomic_RNA"/>
</dbReference>
<dbReference type="EMBL" id="MT635227">
    <property type="protein sequence ID" value="QKV25390.1"/>
    <property type="molecule type" value="Genomic_RNA"/>
</dbReference>
<dbReference type="EMBL" id="MT635228">
    <property type="protein sequence ID" value="QKV25402.1"/>
    <property type="molecule type" value="Genomic_RNA"/>
</dbReference>
<dbReference type="EMBL" id="MT635229">
    <property type="protein sequence ID" value="QKV25414.1"/>
    <property type="molecule type" value="Genomic_RNA"/>
</dbReference>
<dbReference type="EMBL" id="MT635230">
    <property type="protein sequence ID" value="QKV25426.1"/>
    <property type="molecule type" value="Genomic_RNA"/>
</dbReference>
<dbReference type="EMBL" id="MT635231">
    <property type="protein sequence ID" value="QKV25438.1"/>
    <property type="molecule type" value="Genomic_RNA"/>
</dbReference>
<dbReference type="EMBL" id="MT635232">
    <property type="protein sequence ID" value="QKV25450.1"/>
    <property type="molecule type" value="Genomic_RNA"/>
</dbReference>
<dbReference type="EMBL" id="MT635233">
    <property type="protein sequence ID" value="QKV25462.1"/>
    <property type="molecule type" value="Genomic_RNA"/>
</dbReference>
<dbReference type="EMBL" id="MT635234">
    <property type="protein sequence ID" value="QKV25474.1"/>
    <property type="molecule type" value="Genomic_RNA"/>
</dbReference>
<dbReference type="EMBL" id="MT635235">
    <property type="protein sequence ID" value="QKV25486.1"/>
    <property type="molecule type" value="Genomic_RNA"/>
</dbReference>
<dbReference type="EMBL" id="MT635236">
    <property type="protein sequence ID" value="QKV25498.1"/>
    <property type="molecule type" value="Genomic_RNA"/>
</dbReference>
<dbReference type="EMBL" id="MT635237">
    <property type="protein sequence ID" value="QKV25510.1"/>
    <property type="molecule type" value="Genomic_RNA"/>
</dbReference>
<dbReference type="EMBL" id="MT635238">
    <property type="protein sequence ID" value="QKV25522.1"/>
    <property type="molecule type" value="Genomic_RNA"/>
</dbReference>
<dbReference type="EMBL" id="MT635239">
    <property type="protein sequence ID" value="QKV25534.1"/>
    <property type="molecule type" value="Genomic_RNA"/>
</dbReference>
<dbReference type="EMBL" id="MT635240">
    <property type="protein sequence ID" value="QKV25546.1"/>
    <property type="molecule type" value="Genomic_RNA"/>
</dbReference>
<dbReference type="EMBL" id="MT635241">
    <property type="protein sequence ID" value="QKV25558.1"/>
    <property type="molecule type" value="Genomic_RNA"/>
</dbReference>
<dbReference type="EMBL" id="MT635242">
    <property type="protein sequence ID" value="QKV25570.1"/>
    <property type="molecule type" value="Genomic_RNA"/>
</dbReference>
<dbReference type="EMBL" id="MT635243">
    <property type="protein sequence ID" value="QKV25582.1"/>
    <property type="molecule type" value="Genomic_RNA"/>
</dbReference>
<dbReference type="EMBL" id="MT635244">
    <property type="protein sequence ID" value="QKV25594.1"/>
    <property type="molecule type" value="Genomic_RNA"/>
</dbReference>
<dbReference type="EMBL" id="MT635245">
    <property type="protein sequence ID" value="QKV25606.1"/>
    <property type="molecule type" value="Genomic_RNA"/>
</dbReference>
<dbReference type="EMBL" id="MT635246">
    <property type="protein sequence ID" value="QKV25618.1"/>
    <property type="molecule type" value="Genomic_RNA"/>
</dbReference>
<dbReference type="EMBL" id="MT635247">
    <property type="protein sequence ID" value="QKV25630.1"/>
    <property type="molecule type" value="Genomic_RNA"/>
</dbReference>
<dbReference type="EMBL" id="MT635248">
    <property type="protein sequence ID" value="QKV25642.1"/>
    <property type="molecule type" value="Genomic_RNA"/>
</dbReference>
<dbReference type="EMBL" id="MT635249">
    <property type="protein sequence ID" value="QKV25654.1"/>
    <property type="molecule type" value="Genomic_RNA"/>
</dbReference>
<dbReference type="EMBL" id="MT635250">
    <property type="protein sequence ID" value="QKV25666.1"/>
    <property type="molecule type" value="Genomic_RNA"/>
</dbReference>
<dbReference type="EMBL" id="MT635251">
    <property type="protein sequence ID" value="QKV25678.1"/>
    <property type="molecule type" value="Genomic_RNA"/>
</dbReference>
<dbReference type="EMBL" id="MT635252">
    <property type="protein sequence ID" value="QKV25690.1"/>
    <property type="molecule type" value="Genomic_RNA"/>
</dbReference>
<dbReference type="EMBL" id="MT635253">
    <property type="protein sequence ID" value="QKV25702.1"/>
    <property type="molecule type" value="Genomic_RNA"/>
</dbReference>
<dbReference type="EMBL" id="MT635255">
    <property type="protein sequence ID" value="QKV25726.1"/>
    <property type="molecule type" value="Genomic_RNA"/>
</dbReference>
<dbReference type="EMBL" id="MT635256">
    <property type="protein sequence ID" value="QKV25738.1"/>
    <property type="molecule type" value="Genomic_RNA"/>
</dbReference>
<dbReference type="EMBL" id="MT635258">
    <property type="protein sequence ID" value="QKV25762.1"/>
    <property type="molecule type" value="Genomic_RNA"/>
</dbReference>
<dbReference type="EMBL" id="MT635261">
    <property type="protein sequence ID" value="QKV25798.1"/>
    <property type="molecule type" value="Genomic_RNA"/>
</dbReference>
<dbReference type="EMBL" id="MT635262">
    <property type="protein sequence ID" value="QKV25810.1"/>
    <property type="molecule type" value="Genomic_RNA"/>
</dbReference>
<dbReference type="EMBL" id="MT635263">
    <property type="protein sequence ID" value="QKV25822.1"/>
    <property type="molecule type" value="Genomic_RNA"/>
</dbReference>
<dbReference type="EMBL" id="MT635264">
    <property type="protein sequence ID" value="QKV25834.1"/>
    <property type="molecule type" value="Genomic_RNA"/>
</dbReference>
<dbReference type="EMBL" id="MT635265">
    <property type="protein sequence ID" value="QKV25846.1"/>
    <property type="molecule type" value="Genomic_RNA"/>
</dbReference>
<dbReference type="EMBL" id="MT635266">
    <property type="protein sequence ID" value="QKV25858.1"/>
    <property type="molecule type" value="Genomic_RNA"/>
</dbReference>
<dbReference type="EMBL" id="MT635267">
    <property type="protein sequence ID" value="QKV25870.1"/>
    <property type="molecule type" value="Genomic_RNA"/>
</dbReference>
<dbReference type="EMBL" id="MT635268">
    <property type="protein sequence ID" value="QKV25882.1"/>
    <property type="molecule type" value="Genomic_RNA"/>
</dbReference>
<dbReference type="EMBL" id="MT644268">
    <property type="protein sequence ID" value="QKV49395.1"/>
    <property type="molecule type" value="Genomic_RNA"/>
</dbReference>
<dbReference type="EMBL" id="MT653071">
    <property type="protein sequence ID" value="QKX45522.1"/>
    <property type="molecule type" value="Genomic_RNA"/>
</dbReference>
<dbReference type="EMBL" id="MT653072">
    <property type="protein sequence ID" value="QKX45534.1"/>
    <property type="molecule type" value="Genomic_RNA"/>
</dbReference>
<dbReference type="EMBL" id="MT653073">
    <property type="protein sequence ID" value="QKX45546.1"/>
    <property type="molecule type" value="Genomic_RNA"/>
</dbReference>
<dbReference type="EMBL" id="MT653074">
    <property type="protein sequence ID" value="QKX45558.1"/>
    <property type="molecule type" value="Genomic_RNA"/>
</dbReference>
<dbReference type="EMBL" id="MT653075">
    <property type="protein sequence ID" value="QKX45570.1"/>
    <property type="molecule type" value="Genomic_RNA"/>
</dbReference>
<dbReference type="EMBL" id="MT653076">
    <property type="protein sequence ID" value="QKX45582.1"/>
    <property type="molecule type" value="Genomic_RNA"/>
</dbReference>
<dbReference type="EMBL" id="MT653077">
    <property type="protein sequence ID" value="QKX45594.1"/>
    <property type="molecule type" value="Genomic_RNA"/>
</dbReference>
<dbReference type="EMBL" id="MT653078">
    <property type="protein sequence ID" value="QKX45606.1"/>
    <property type="molecule type" value="Genomic_RNA"/>
</dbReference>
<dbReference type="EMBL" id="MT653079">
    <property type="protein sequence ID" value="QKX45618.1"/>
    <property type="molecule type" value="Genomic_RNA"/>
</dbReference>
<dbReference type="EMBL" id="MT653080">
    <property type="protein sequence ID" value="QKX45630.1"/>
    <property type="molecule type" value="Genomic_RNA"/>
</dbReference>
<dbReference type="EMBL" id="MT653081">
    <property type="protein sequence ID" value="QKX45642.1"/>
    <property type="molecule type" value="Genomic_RNA"/>
</dbReference>
<dbReference type="EMBL" id="MT653082">
    <property type="protein sequence ID" value="QKX45654.1"/>
    <property type="molecule type" value="Genomic_RNA"/>
</dbReference>
<dbReference type="EMBL" id="MT668716">
    <property type="protein sequence ID" value="QKY68239.1"/>
    <property type="molecule type" value="Genomic_RNA"/>
</dbReference>
<dbReference type="EMBL" id="MT670008">
    <property type="protein sequence ID" value="QKY74783.1"/>
    <property type="molecule type" value="Genomic_RNA"/>
</dbReference>
<dbReference type="EMBL" id="MT704310">
    <property type="protein sequence ID" value="QLC48416.1"/>
    <property type="molecule type" value="Genomic_RNA"/>
</dbReference>
<dbReference type="EMBL" id="MT704311">
    <property type="protein sequence ID" value="QLC48428.1"/>
    <property type="molecule type" value="Genomic_RNA"/>
</dbReference>
<dbReference type="EMBL" id="MT704312">
    <property type="protein sequence ID" value="QLC48440.1"/>
    <property type="molecule type" value="Genomic_RNA"/>
</dbReference>
<dbReference type="EMBL" id="MT704313">
    <property type="protein sequence ID" value="QLC48452.1"/>
    <property type="molecule type" value="Genomic_RNA"/>
</dbReference>
<dbReference type="EMBL" id="MT704314">
    <property type="protein sequence ID" value="QLC48464.1"/>
    <property type="molecule type" value="Genomic_RNA"/>
</dbReference>
<dbReference type="EMBL" id="MT704315">
    <property type="protein sequence ID" value="QLC48476.1"/>
    <property type="molecule type" value="Genomic_RNA"/>
</dbReference>
<dbReference type="EMBL" id="MT704316">
    <property type="protein sequence ID" value="QLC48488.1"/>
    <property type="molecule type" value="Genomic_RNA"/>
</dbReference>
<dbReference type="EMBL" id="MT704317">
    <property type="protein sequence ID" value="QLC48500.1"/>
    <property type="molecule type" value="Genomic_RNA"/>
</dbReference>
<dbReference type="EMBL" id="MT747978">
    <property type="protein sequence ID" value="QLG96902.1"/>
    <property type="molecule type" value="Genomic_RNA"/>
</dbReference>
<dbReference type="EMBL" id="MT594401">
    <property type="protein sequence ID" value="QLJ57668.1"/>
    <property type="molecule type" value="Genomic_RNA"/>
</dbReference>
<dbReference type="EMBL" id="MT594402">
    <property type="protein sequence ID" value="QLJ57680.1"/>
    <property type="molecule type" value="Genomic_RNA"/>
</dbReference>
<dbReference type="EMBL" id="MT786446">
    <property type="protein sequence ID" value="QLK03548.1"/>
    <property type="molecule type" value="Genomic_RNA"/>
</dbReference>
<dbReference type="EMBL" id="MT810119">
    <property type="protein sequence ID" value="QMI57737.1"/>
    <property type="molecule type" value="Genomic_RNA"/>
</dbReference>
<dbReference type="EMBL" id="MT882022">
    <property type="protein sequence ID" value="QNC68227.1"/>
    <property type="molecule type" value="Genomic_RNA"/>
</dbReference>
<dbReference type="EMBL" id="MT906649">
    <property type="protein sequence ID" value="QNH88657.1"/>
    <property type="molecule type" value="Genomic_RNA"/>
</dbReference>
<dbReference type="EMBL" id="MT844088">
    <property type="protein sequence ID" value="QNN30801.1"/>
    <property type="molecule type" value="Genomic_RNA"/>
</dbReference>
<dbReference type="EMBL" id="MT844089">
    <property type="protein sequence ID" value="QNN30813.1"/>
    <property type="molecule type" value="Genomic_RNA"/>
</dbReference>
<dbReference type="EMBL" id="MT952602">
    <property type="protein sequence ID" value="QNN93362.1"/>
    <property type="molecule type" value="Genomic_RNA"/>
</dbReference>
<dbReference type="EMBL" id="MT982401">
    <property type="protein sequence ID" value="QNQ32124.1"/>
    <property type="molecule type" value="Genomic_RNA"/>
</dbReference>
<dbReference type="EMBL" id="MT982402">
    <property type="protein sequence ID" value="QNQ32136.1"/>
    <property type="molecule type" value="Genomic_RNA"/>
</dbReference>
<dbReference type="EMBL" id="MT982403">
    <property type="protein sequence ID" value="QNQ32148.1"/>
    <property type="molecule type" value="Genomic_RNA"/>
</dbReference>
<dbReference type="EMBL" id="MT982404">
    <property type="protein sequence ID" value="QNQ32160.1"/>
    <property type="molecule type" value="Genomic_RNA"/>
</dbReference>
<dbReference type="EMBL" id="MT982405">
    <property type="protein sequence ID" value="QNQ32172.1"/>
    <property type="molecule type" value="Genomic_RNA"/>
</dbReference>
<dbReference type="EMBL" id="MT982406">
    <property type="protein sequence ID" value="QNQ32184.1"/>
    <property type="molecule type" value="Genomic_RNA"/>
</dbReference>
<dbReference type="EMBL" id="MW064259">
    <property type="protein sequence ID" value="QOF07598.1"/>
    <property type="molecule type" value="Genomic_RNA"/>
</dbReference>
<dbReference type="EMBL" id="MW064260">
    <property type="protein sequence ID" value="QOF07610.1"/>
    <property type="molecule type" value="Genomic_RNA"/>
</dbReference>
<dbReference type="EMBL" id="MW064261">
    <property type="protein sequence ID" value="QOF07622.1"/>
    <property type="molecule type" value="Genomic_RNA"/>
</dbReference>
<dbReference type="EMBL" id="MW064262">
    <property type="protein sequence ID" value="QOF07633.1"/>
    <property type="molecule type" value="Genomic_RNA"/>
</dbReference>
<dbReference type="EMBL" id="MW064263">
    <property type="protein sequence ID" value="QOF07645.1"/>
    <property type="molecule type" value="Genomic_RNA"/>
</dbReference>
<dbReference type="EMBL" id="MW064264">
    <property type="protein sequence ID" value="QOF07657.1"/>
    <property type="molecule type" value="Genomic_RNA"/>
</dbReference>
<dbReference type="EMBL" id="MW221275">
    <property type="protein sequence ID" value="QOY44143.1"/>
    <property type="molecule type" value="Genomic_RNA"/>
</dbReference>
<dbReference type="EMBL" id="MW298637">
    <property type="protein sequence ID" value="QPI70587.1"/>
    <property type="molecule type" value="Genomic_RNA"/>
</dbReference>
<dbReference type="EMBL" id="MW298638">
    <property type="protein sequence ID" value="QPI70599.1"/>
    <property type="molecule type" value="Genomic_RNA"/>
</dbReference>
<dbReference type="EMBL" id="MW298639">
    <property type="protein sequence ID" value="QPI70611.1"/>
    <property type="molecule type" value="Genomic_RNA"/>
</dbReference>
<dbReference type="EMBL" id="MW298640">
    <property type="protein sequence ID" value="QPI70623.1"/>
    <property type="molecule type" value="Genomic_RNA"/>
</dbReference>
<dbReference type="EMBL" id="MW298641">
    <property type="protein sequence ID" value="QPI70635.1"/>
    <property type="molecule type" value="Genomic_RNA"/>
</dbReference>
<dbReference type="EMBL" id="MW298642">
    <property type="protein sequence ID" value="QPI70647.1"/>
    <property type="molecule type" value="Genomic_RNA"/>
</dbReference>
<dbReference type="EMBL" id="MW298643">
    <property type="protein sequence ID" value="QPI70659.1"/>
    <property type="molecule type" value="Genomic_RNA"/>
</dbReference>
<dbReference type="EMBL" id="MW307809">
    <property type="protein sequence ID" value="QPJ75794.1"/>
    <property type="molecule type" value="Genomic_RNA"/>
</dbReference>
<dbReference type="EMBL" id="MW308137">
    <property type="protein sequence ID" value="QPJ75886.1"/>
    <property type="molecule type" value="Genomic_RNA"/>
</dbReference>
<dbReference type="EMBL" id="MW403692">
    <property type="protein sequence ID" value="QQD89007.1"/>
    <property type="molecule type" value="Genomic_RNA"/>
</dbReference>
<dbReference type="EMBL" id="MW403693">
    <property type="protein sequence ID" value="QQD89019.1"/>
    <property type="molecule type" value="Genomic_RNA"/>
</dbReference>
<dbReference type="EMBL" id="MW403694">
    <property type="protein sequence ID" value="QQD89031.1"/>
    <property type="molecule type" value="Genomic_RNA"/>
</dbReference>
<dbReference type="EMBL" id="MW403695">
    <property type="protein sequence ID" value="QQD89043.1"/>
    <property type="molecule type" value="Genomic_RNA"/>
</dbReference>
<dbReference type="EMBL" id="MW403696">
    <property type="protein sequence ID" value="QQD89055.1"/>
    <property type="molecule type" value="Genomic_RNA"/>
</dbReference>
<dbReference type="EMBL" id="MW403697">
    <property type="protein sequence ID" value="QQD89067.1"/>
    <property type="molecule type" value="Genomic_RNA"/>
</dbReference>
<dbReference type="EMBL" id="MW403698">
    <property type="protein sequence ID" value="QQD89079.1"/>
    <property type="molecule type" value="Genomic_RNA"/>
</dbReference>
<dbReference type="EMBL" id="MW403699">
    <property type="protein sequence ID" value="QQD89091.1"/>
    <property type="molecule type" value="Genomic_RNA"/>
</dbReference>
<dbReference type="EMBL" id="MW403700">
    <property type="protein sequence ID" value="QQD89103.1"/>
    <property type="molecule type" value="Genomic_RNA"/>
</dbReference>
<dbReference type="EMBL" id="MW403701">
    <property type="protein sequence ID" value="QQD89115.1"/>
    <property type="molecule type" value="Genomic_RNA"/>
</dbReference>
<dbReference type="EMBL" id="MW403702">
    <property type="protein sequence ID" value="QQD89127.1"/>
    <property type="molecule type" value="Genomic_RNA"/>
</dbReference>
<dbReference type="EMBL" id="MW403703">
    <property type="protein sequence ID" value="QQD89139.1"/>
    <property type="molecule type" value="Genomic_RNA"/>
</dbReference>
<dbReference type="EMBL" id="MW447609">
    <property type="protein sequence ID" value="QQL13883.1"/>
    <property type="molecule type" value="Genomic_RNA"/>
</dbReference>
<dbReference type="EMBL" id="MW447610">
    <property type="protein sequence ID" value="QQL13895.1"/>
    <property type="molecule type" value="Genomic_RNA"/>
</dbReference>
<dbReference type="EMBL" id="MW447611">
    <property type="protein sequence ID" value="QQL13907.1"/>
    <property type="molecule type" value="Genomic_RNA"/>
</dbReference>
<dbReference type="EMBL" id="MW447612">
    <property type="protein sequence ID" value="QQL13919.1"/>
    <property type="molecule type" value="Genomic_RNA"/>
</dbReference>
<dbReference type="EMBL" id="MW447614">
    <property type="protein sequence ID" value="QQL13942.1"/>
    <property type="molecule type" value="Genomic_RNA"/>
</dbReference>
<dbReference type="EMBL" id="MW447616">
    <property type="protein sequence ID" value="QQL13965.1"/>
    <property type="molecule type" value="Genomic_RNA"/>
</dbReference>
<dbReference type="EMBL" id="MW447618">
    <property type="protein sequence ID" value="QQL13988.1"/>
    <property type="molecule type" value="Genomic_RNA"/>
</dbReference>
<dbReference type="EMBL" id="MW447619">
    <property type="protein sequence ID" value="QQL14000.1"/>
    <property type="molecule type" value="Genomic_RNA"/>
</dbReference>
<dbReference type="EMBL" id="MW447620">
    <property type="protein sequence ID" value="QQL14012.1"/>
    <property type="molecule type" value="Genomic_RNA"/>
</dbReference>
<dbReference type="EMBL" id="MW447621">
    <property type="protein sequence ID" value="QQL14024.1"/>
    <property type="molecule type" value="Genomic_RNA"/>
</dbReference>
<dbReference type="EMBL" id="MW447622">
    <property type="protein sequence ID" value="QQL14036.1"/>
    <property type="molecule type" value="Genomic_RNA"/>
</dbReference>
<dbReference type="EMBL" id="MW447623">
    <property type="protein sequence ID" value="QQL14048.1"/>
    <property type="molecule type" value="Genomic_RNA"/>
</dbReference>
<dbReference type="EMBL" id="MW447624">
    <property type="protein sequence ID" value="QQL14060.1"/>
    <property type="molecule type" value="Genomic_RNA"/>
</dbReference>
<dbReference type="EMBL" id="MW447625">
    <property type="protein sequence ID" value="QQL14072.1"/>
    <property type="molecule type" value="Genomic_RNA"/>
</dbReference>
<dbReference type="EMBL" id="MW447626">
    <property type="protein sequence ID" value="QQL14084.1"/>
    <property type="molecule type" value="Genomic_RNA"/>
</dbReference>
<dbReference type="EMBL" id="MW447627">
    <property type="protein sequence ID" value="QQL14096.1"/>
    <property type="molecule type" value="Genomic_RNA"/>
</dbReference>
<dbReference type="EMBL" id="MW447628">
    <property type="protein sequence ID" value="QQL14108.1"/>
    <property type="molecule type" value="Genomic_RNA"/>
</dbReference>
<dbReference type="EMBL" id="MW447630">
    <property type="protein sequence ID" value="QQL14131.1"/>
    <property type="molecule type" value="Genomic_RNA"/>
</dbReference>
<dbReference type="EMBL" id="MW447632">
    <property type="protein sequence ID" value="QQL14154.1"/>
    <property type="molecule type" value="Genomic_RNA"/>
</dbReference>
<dbReference type="EMBL" id="MW447634">
    <property type="protein sequence ID" value="QQL14177.1"/>
    <property type="molecule type" value="Genomic_RNA"/>
</dbReference>
<dbReference type="EMBL" id="MW447635">
    <property type="protein sequence ID" value="QQL14189.1"/>
    <property type="molecule type" value="Genomic_RNA"/>
</dbReference>
<dbReference type="EMBL" id="MW447636">
    <property type="protein sequence ID" value="QQL14201.1"/>
    <property type="molecule type" value="Genomic_RNA"/>
</dbReference>
<dbReference type="EMBL" id="MW447637">
    <property type="protein sequence ID" value="QQL14213.1"/>
    <property type="molecule type" value="Genomic_RNA"/>
</dbReference>
<dbReference type="EMBL" id="MW447638">
    <property type="protein sequence ID" value="QQL14225.1"/>
    <property type="molecule type" value="Genomic_RNA"/>
</dbReference>
<dbReference type="EMBL" id="MW447639">
    <property type="protein sequence ID" value="QQL14237.1"/>
    <property type="molecule type" value="Genomic_RNA"/>
</dbReference>
<dbReference type="EMBL" id="MW447640">
    <property type="protein sequence ID" value="QQL14249.1"/>
    <property type="molecule type" value="Genomic_RNA"/>
</dbReference>
<dbReference type="EMBL" id="MW447641">
    <property type="protein sequence ID" value="QQL14261.1"/>
    <property type="molecule type" value="Genomic_RNA"/>
</dbReference>
<dbReference type="EMBL" id="MW447642">
    <property type="protein sequence ID" value="QQL14273.1"/>
    <property type="molecule type" value="Genomic_RNA"/>
</dbReference>
<dbReference type="EMBL" id="MW447643">
    <property type="protein sequence ID" value="QQL14285.1"/>
    <property type="molecule type" value="Genomic_RNA"/>
</dbReference>
<dbReference type="EMBL" id="MW447644">
    <property type="protein sequence ID" value="QQL14297.1"/>
    <property type="molecule type" value="Genomic_RNA"/>
</dbReference>
<dbReference type="EMBL" id="MW493710">
    <property type="protein sequence ID" value="QQV22129.1"/>
    <property type="molecule type" value="Genomic_RNA"/>
</dbReference>
<dbReference type="EMBL" id="MW493711">
    <property type="protein sequence ID" value="QQV22141.1"/>
    <property type="molecule type" value="Genomic_RNA"/>
</dbReference>
<dbReference type="EMBL" id="MW493712">
    <property type="protein sequence ID" value="QQV22153.1"/>
    <property type="molecule type" value="Genomic_RNA"/>
</dbReference>
<dbReference type="EMBL" id="MW493713">
    <property type="protein sequence ID" value="QQV22165.1"/>
    <property type="molecule type" value="Genomic_RNA"/>
</dbReference>
<dbReference type="EMBL" id="MW493714">
    <property type="protein sequence ID" value="QQV22177.1"/>
    <property type="molecule type" value="Genomic_RNA"/>
</dbReference>
<dbReference type="EMBL" id="MW493715">
    <property type="protein sequence ID" value="QQV22189.1"/>
    <property type="molecule type" value="Genomic_RNA"/>
</dbReference>
<dbReference type="EMBL" id="MW493716">
    <property type="protein sequence ID" value="QQV22201.1"/>
    <property type="molecule type" value="Genomic_RNA"/>
</dbReference>
<dbReference type="EMBL" id="MW493717">
    <property type="protein sequence ID" value="QQV22213.1"/>
    <property type="molecule type" value="Genomic_RNA"/>
</dbReference>
<dbReference type="EMBL" id="MW493718">
    <property type="protein sequence ID" value="QQV22225.1"/>
    <property type="molecule type" value="Genomic_RNA"/>
</dbReference>
<dbReference type="EMBL" id="MW493719">
    <property type="protein sequence ID" value="QQV22237.1"/>
    <property type="molecule type" value="Genomic_RNA"/>
</dbReference>
<dbReference type="EMBL" id="MW493720">
    <property type="protein sequence ID" value="QQV22249.1"/>
    <property type="molecule type" value="Genomic_RNA"/>
</dbReference>
<dbReference type="EMBL" id="MW493721">
    <property type="protein sequence ID" value="QQV22261.1"/>
    <property type="molecule type" value="Genomic_RNA"/>
</dbReference>
<dbReference type="EMBL" id="MW493722">
    <property type="protein sequence ID" value="QQV22273.1"/>
    <property type="molecule type" value="Genomic_RNA"/>
</dbReference>
<dbReference type="EMBL" id="MW493723">
    <property type="protein sequence ID" value="QQV22285.1"/>
    <property type="molecule type" value="Genomic_RNA"/>
</dbReference>
<dbReference type="EMBL" id="MW493724">
    <property type="protein sequence ID" value="QQV22297.1"/>
    <property type="molecule type" value="Genomic_RNA"/>
</dbReference>
<dbReference type="EMBL" id="MW493725">
    <property type="protein sequence ID" value="QQV22309.1"/>
    <property type="molecule type" value="Genomic_RNA"/>
</dbReference>
<dbReference type="EMBL" id="MW493726">
    <property type="protein sequence ID" value="QQV22321.1"/>
    <property type="molecule type" value="Genomic_RNA"/>
</dbReference>
<dbReference type="EMBL" id="MW493727">
    <property type="protein sequence ID" value="QQV22333.1"/>
    <property type="molecule type" value="Genomic_RNA"/>
</dbReference>
<dbReference type="EMBL" id="MW493728">
    <property type="protein sequence ID" value="QQV22345.1"/>
    <property type="molecule type" value="Genomic_RNA"/>
</dbReference>
<dbReference type="EMBL" id="MW493729">
    <property type="protein sequence ID" value="QQV22357.1"/>
    <property type="molecule type" value="Genomic_RNA"/>
</dbReference>
<dbReference type="EMBL" id="MW493730">
    <property type="protein sequence ID" value="QQV22369.1"/>
    <property type="molecule type" value="Genomic_RNA"/>
</dbReference>
<dbReference type="EMBL" id="MW493731">
    <property type="protein sequence ID" value="QQV22381.1"/>
    <property type="molecule type" value="Genomic_RNA"/>
</dbReference>
<dbReference type="EMBL" id="MW493732">
    <property type="protein sequence ID" value="QQV22393.1"/>
    <property type="molecule type" value="Genomic_RNA"/>
</dbReference>
<dbReference type="EMBL" id="MW493733">
    <property type="protein sequence ID" value="QQV22405.1"/>
    <property type="molecule type" value="Genomic_RNA"/>
</dbReference>
<dbReference type="EMBL" id="MW493734">
    <property type="protein sequence ID" value="QQV22417.1"/>
    <property type="molecule type" value="Genomic_RNA"/>
</dbReference>
<dbReference type="EMBL" id="MW493735">
    <property type="protein sequence ID" value="QQV22429.1"/>
    <property type="molecule type" value="Genomic_RNA"/>
</dbReference>
<dbReference type="EMBL" id="MW493736">
    <property type="protein sequence ID" value="QQV22441.1"/>
    <property type="molecule type" value="Genomic_RNA"/>
</dbReference>
<dbReference type="EMBL" id="MW493737">
    <property type="protein sequence ID" value="QQV22453.1"/>
    <property type="molecule type" value="Genomic_RNA"/>
</dbReference>
<dbReference type="EMBL" id="MW493738">
    <property type="protein sequence ID" value="QQV22465.1"/>
    <property type="molecule type" value="Genomic_RNA"/>
</dbReference>
<dbReference type="EMBL" id="MW493739">
    <property type="protein sequence ID" value="QQV22477.1"/>
    <property type="molecule type" value="Genomic_RNA"/>
</dbReference>
<dbReference type="EMBL" id="MW493740">
    <property type="protein sequence ID" value="QQV22489.1"/>
    <property type="molecule type" value="Genomic_RNA"/>
</dbReference>
<dbReference type="EMBL" id="MW493741">
    <property type="protein sequence ID" value="QQV22501.1"/>
    <property type="molecule type" value="Genomic_RNA"/>
</dbReference>
<dbReference type="EMBL" id="MW493742">
    <property type="protein sequence ID" value="QQV22513.1"/>
    <property type="molecule type" value="Genomic_RNA"/>
</dbReference>
<dbReference type="EMBL" id="MW493743">
    <property type="protein sequence ID" value="QQV22525.1"/>
    <property type="molecule type" value="Genomic_RNA"/>
</dbReference>
<dbReference type="EMBL" id="MW493744">
    <property type="protein sequence ID" value="QQV22537.1"/>
    <property type="molecule type" value="Genomic_RNA"/>
</dbReference>
<dbReference type="EMBL" id="MW493745">
    <property type="protein sequence ID" value="QQV22549.1"/>
    <property type="molecule type" value="Genomic_RNA"/>
</dbReference>
<dbReference type="EMBL" id="MW493746">
    <property type="protein sequence ID" value="QQV22561.1"/>
    <property type="molecule type" value="Genomic_RNA"/>
</dbReference>
<dbReference type="EMBL" id="MW493747">
    <property type="protein sequence ID" value="QQV22573.1"/>
    <property type="molecule type" value="Genomic_RNA"/>
</dbReference>
<dbReference type="EMBL" id="MW493748">
    <property type="protein sequence ID" value="QQV22585.1"/>
    <property type="molecule type" value="Genomic_RNA"/>
</dbReference>
<dbReference type="EMBL" id="MW493749">
    <property type="protein sequence ID" value="QQV22597.1"/>
    <property type="molecule type" value="Genomic_RNA"/>
</dbReference>
<dbReference type="EMBL" id="MW493750">
    <property type="protein sequence ID" value="QQV22609.1"/>
    <property type="molecule type" value="Genomic_RNA"/>
</dbReference>
<dbReference type="EMBL" id="MW493751">
    <property type="protein sequence ID" value="QQV22621.1"/>
    <property type="molecule type" value="Genomic_RNA"/>
</dbReference>
<dbReference type="EMBL" id="MW493752">
    <property type="protein sequence ID" value="QQV22633.1"/>
    <property type="molecule type" value="Genomic_RNA"/>
</dbReference>
<dbReference type="EMBL" id="MW493753">
    <property type="protein sequence ID" value="QQV22645.1"/>
    <property type="molecule type" value="Genomic_RNA"/>
</dbReference>
<dbReference type="EMBL" id="MW493754">
    <property type="protein sequence ID" value="QQV22657.1"/>
    <property type="molecule type" value="Genomic_RNA"/>
</dbReference>
<dbReference type="EMBL" id="MW493755">
    <property type="protein sequence ID" value="QQV22669.1"/>
    <property type="molecule type" value="Genomic_RNA"/>
</dbReference>
<dbReference type="EMBL" id="MW493756">
    <property type="protein sequence ID" value="QQV22681.1"/>
    <property type="molecule type" value="Genomic_RNA"/>
</dbReference>
<dbReference type="EMBL" id="MW493757">
    <property type="protein sequence ID" value="QQV22693.1"/>
    <property type="molecule type" value="Genomic_RNA"/>
</dbReference>
<dbReference type="EMBL" id="MW493758">
    <property type="protein sequence ID" value="QQV22705.1"/>
    <property type="molecule type" value="Genomic_RNA"/>
</dbReference>
<dbReference type="EMBL" id="MW493759">
    <property type="protein sequence ID" value="QQV22717.1"/>
    <property type="molecule type" value="Genomic_RNA"/>
</dbReference>
<dbReference type="EMBL" id="MW493760">
    <property type="protein sequence ID" value="QQV22729.1"/>
    <property type="molecule type" value="Genomic_RNA"/>
</dbReference>
<dbReference type="EMBL" id="MW493761">
    <property type="protein sequence ID" value="QQV22741.1"/>
    <property type="molecule type" value="Genomic_RNA"/>
</dbReference>
<dbReference type="EMBL" id="MW493762">
    <property type="protein sequence ID" value="QQV22753.1"/>
    <property type="molecule type" value="Genomic_RNA"/>
</dbReference>
<dbReference type="EMBL" id="MW493763">
    <property type="protein sequence ID" value="QQV22765.1"/>
    <property type="molecule type" value="Genomic_RNA"/>
</dbReference>
<dbReference type="EMBL" id="MW493764">
    <property type="protein sequence ID" value="QQV22777.1"/>
    <property type="molecule type" value="Genomic_RNA"/>
</dbReference>
<dbReference type="EMBL" id="MW493765">
    <property type="protein sequence ID" value="QQV22789.1"/>
    <property type="molecule type" value="Genomic_RNA"/>
</dbReference>
<dbReference type="EMBL" id="MW493766">
    <property type="protein sequence ID" value="QQV22801.1"/>
    <property type="molecule type" value="Genomic_RNA"/>
</dbReference>
<dbReference type="EMBL" id="MW493767">
    <property type="protein sequence ID" value="QQV22813.1"/>
    <property type="molecule type" value="Genomic_RNA"/>
</dbReference>
<dbReference type="EMBL" id="MW493768">
    <property type="protein sequence ID" value="QQV22825.1"/>
    <property type="molecule type" value="Genomic_RNA"/>
</dbReference>
<dbReference type="EMBL" id="MW493769">
    <property type="protein sequence ID" value="QQV22837.1"/>
    <property type="molecule type" value="Genomic_RNA"/>
</dbReference>
<dbReference type="EMBL" id="MW493770">
    <property type="protein sequence ID" value="QQV22849.1"/>
    <property type="molecule type" value="Genomic_RNA"/>
</dbReference>
<dbReference type="EMBL" id="MW493771">
    <property type="protein sequence ID" value="QQV22861.1"/>
    <property type="molecule type" value="Genomic_RNA"/>
</dbReference>
<dbReference type="EMBL" id="MW493772">
    <property type="protein sequence ID" value="QQV22873.1"/>
    <property type="molecule type" value="Genomic_RNA"/>
</dbReference>
<dbReference type="EMBL" id="MW493773">
    <property type="protein sequence ID" value="QQV22885.1"/>
    <property type="molecule type" value="Genomic_RNA"/>
</dbReference>
<dbReference type="EMBL" id="MW493774">
    <property type="protein sequence ID" value="QQV22897.1"/>
    <property type="molecule type" value="Genomic_RNA"/>
</dbReference>
<dbReference type="EMBL" id="MW493775">
    <property type="protein sequence ID" value="QQV22909.1"/>
    <property type="molecule type" value="Genomic_RNA"/>
</dbReference>
<dbReference type="EMBL" id="MW493776">
    <property type="protein sequence ID" value="QQV22921.1"/>
    <property type="molecule type" value="Genomic_RNA"/>
</dbReference>
<dbReference type="EMBL" id="MW493777">
    <property type="protein sequence ID" value="QQV22933.1"/>
    <property type="molecule type" value="Genomic_RNA"/>
</dbReference>
<dbReference type="EMBL" id="MW493778">
    <property type="protein sequence ID" value="QQV22945.1"/>
    <property type="molecule type" value="Genomic_RNA"/>
</dbReference>
<dbReference type="EMBL" id="MW493779">
    <property type="protein sequence ID" value="QQV22957.1"/>
    <property type="molecule type" value="Genomic_RNA"/>
</dbReference>
<dbReference type="EMBL" id="MW493780">
    <property type="protein sequence ID" value="QQV22969.1"/>
    <property type="molecule type" value="Genomic_RNA"/>
</dbReference>
<dbReference type="EMBL" id="MW493781">
    <property type="protein sequence ID" value="QQV22981.1"/>
    <property type="molecule type" value="Genomic_RNA"/>
</dbReference>
<dbReference type="EMBL" id="MW493782">
    <property type="protein sequence ID" value="QQV22993.1"/>
    <property type="molecule type" value="Genomic_RNA"/>
</dbReference>
<dbReference type="EMBL" id="MW493783">
    <property type="protein sequence ID" value="QQV23005.1"/>
    <property type="molecule type" value="Genomic_RNA"/>
</dbReference>
<dbReference type="EMBL" id="MW493784">
    <property type="protein sequence ID" value="QQV23017.1"/>
    <property type="molecule type" value="Genomic_RNA"/>
</dbReference>
<dbReference type="EMBL" id="MW493785">
    <property type="protein sequence ID" value="QQV23029.1"/>
    <property type="molecule type" value="Genomic_RNA"/>
</dbReference>
<dbReference type="EMBL" id="MW493786">
    <property type="protein sequence ID" value="QQV23041.1"/>
    <property type="molecule type" value="Genomic_RNA"/>
</dbReference>
<dbReference type="EMBL" id="MW493787">
    <property type="protein sequence ID" value="QQV23053.1"/>
    <property type="molecule type" value="Genomic_RNA"/>
</dbReference>
<dbReference type="EMBL" id="MW493788">
    <property type="protein sequence ID" value="QQV23065.1"/>
    <property type="molecule type" value="Genomic_RNA"/>
</dbReference>
<dbReference type="EMBL" id="MW493789">
    <property type="protein sequence ID" value="QQV23077.1"/>
    <property type="molecule type" value="Genomic_RNA"/>
</dbReference>
<dbReference type="EMBL" id="MW493790">
    <property type="protein sequence ID" value="QQV23089.1"/>
    <property type="molecule type" value="Genomic_RNA"/>
</dbReference>
<dbReference type="EMBL" id="MW493791">
    <property type="protein sequence ID" value="QQV23101.1"/>
    <property type="molecule type" value="Genomic_RNA"/>
</dbReference>
<dbReference type="EMBL" id="MW493792">
    <property type="protein sequence ID" value="QQV23113.1"/>
    <property type="molecule type" value="Genomic_RNA"/>
</dbReference>
<dbReference type="EMBL" id="MW493793">
    <property type="protein sequence ID" value="QQV23125.1"/>
    <property type="molecule type" value="Genomic_RNA"/>
</dbReference>
<dbReference type="EMBL" id="MW493794">
    <property type="protein sequence ID" value="QQV23137.1"/>
    <property type="molecule type" value="Genomic_RNA"/>
</dbReference>
<dbReference type="EMBL" id="MW493795">
    <property type="protein sequence ID" value="QQV23149.1"/>
    <property type="molecule type" value="Genomic_RNA"/>
</dbReference>
<dbReference type="EMBL" id="MW493796">
    <property type="protein sequence ID" value="QQV23161.1"/>
    <property type="molecule type" value="Genomic_RNA"/>
</dbReference>
<dbReference type="EMBL" id="MW493797">
    <property type="protein sequence ID" value="QQV23173.1"/>
    <property type="molecule type" value="Genomic_RNA"/>
</dbReference>
<dbReference type="EMBL" id="MW493798">
    <property type="protein sequence ID" value="QQV23185.1"/>
    <property type="molecule type" value="Genomic_RNA"/>
</dbReference>
<dbReference type="EMBL" id="MW493799">
    <property type="protein sequence ID" value="QQV23197.1"/>
    <property type="molecule type" value="Genomic_RNA"/>
</dbReference>
<dbReference type="EMBL" id="MW493800">
    <property type="protein sequence ID" value="QQV23209.1"/>
    <property type="molecule type" value="Genomic_RNA"/>
</dbReference>
<dbReference type="EMBL" id="MW493801">
    <property type="protein sequence ID" value="QQV23221.1"/>
    <property type="molecule type" value="Genomic_RNA"/>
</dbReference>
<dbReference type="EMBL" id="MW493802">
    <property type="protein sequence ID" value="QQV23233.1"/>
    <property type="molecule type" value="Genomic_RNA"/>
</dbReference>
<dbReference type="EMBL" id="MW493803">
    <property type="protein sequence ID" value="QQV23245.1"/>
    <property type="molecule type" value="Genomic_RNA"/>
</dbReference>
<dbReference type="EMBL" id="MW493804">
    <property type="protein sequence ID" value="QQV23257.1"/>
    <property type="molecule type" value="Genomic_RNA"/>
</dbReference>
<dbReference type="EMBL" id="MW493805">
    <property type="protein sequence ID" value="QQV23269.1"/>
    <property type="molecule type" value="Genomic_RNA"/>
</dbReference>
<dbReference type="EMBL" id="MW493806">
    <property type="protein sequence ID" value="QQV23281.1"/>
    <property type="molecule type" value="Genomic_RNA"/>
</dbReference>
<dbReference type="EMBL" id="MW493807">
    <property type="protein sequence ID" value="QQV23293.1"/>
    <property type="molecule type" value="Genomic_RNA"/>
</dbReference>
<dbReference type="EMBL" id="MW493808">
    <property type="protein sequence ID" value="QQV23305.1"/>
    <property type="molecule type" value="Genomic_RNA"/>
</dbReference>
<dbReference type="EMBL" id="MW493809">
    <property type="protein sequence ID" value="QQV23317.1"/>
    <property type="molecule type" value="Genomic_RNA"/>
</dbReference>
<dbReference type="EMBL" id="MW493810">
    <property type="protein sequence ID" value="QQV23329.1"/>
    <property type="molecule type" value="Genomic_RNA"/>
</dbReference>
<dbReference type="EMBL" id="MW493811">
    <property type="protein sequence ID" value="QQV23341.1"/>
    <property type="molecule type" value="Genomic_RNA"/>
</dbReference>
<dbReference type="EMBL" id="MW493812">
    <property type="protein sequence ID" value="QQV23353.1"/>
    <property type="molecule type" value="Genomic_RNA"/>
</dbReference>
<dbReference type="EMBL" id="MW493813">
    <property type="protein sequence ID" value="QQV23365.1"/>
    <property type="molecule type" value="Genomic_RNA"/>
</dbReference>
<dbReference type="EMBL" id="MW493814">
    <property type="protein sequence ID" value="QQV23377.1"/>
    <property type="molecule type" value="Genomic_RNA"/>
</dbReference>
<dbReference type="EMBL" id="MW493815">
    <property type="protein sequence ID" value="QQV23389.1"/>
    <property type="molecule type" value="Genomic_RNA"/>
</dbReference>
<dbReference type="EMBL" id="MW493816">
    <property type="protein sequence ID" value="QQV23401.1"/>
    <property type="molecule type" value="Genomic_RNA"/>
</dbReference>
<dbReference type="EMBL" id="MW493817">
    <property type="protein sequence ID" value="QQV23413.1"/>
    <property type="molecule type" value="Genomic_RNA"/>
</dbReference>
<dbReference type="EMBL" id="MW493818">
    <property type="protein sequence ID" value="QQV23425.1"/>
    <property type="molecule type" value="Genomic_RNA"/>
</dbReference>
<dbReference type="EMBL" id="MW493819">
    <property type="protein sequence ID" value="QQV23437.1"/>
    <property type="molecule type" value="Genomic_RNA"/>
</dbReference>
<dbReference type="EMBL" id="MW493820">
    <property type="protein sequence ID" value="QQV23449.1"/>
    <property type="molecule type" value="Genomic_RNA"/>
</dbReference>
<dbReference type="EMBL" id="MW493821">
    <property type="protein sequence ID" value="QQV23461.1"/>
    <property type="molecule type" value="Genomic_RNA"/>
</dbReference>
<dbReference type="EMBL" id="MW493822">
    <property type="protein sequence ID" value="QQV23473.1"/>
    <property type="molecule type" value="Genomic_RNA"/>
</dbReference>
<dbReference type="EMBL" id="MW493823">
    <property type="protein sequence ID" value="QQV23485.1"/>
    <property type="molecule type" value="Genomic_RNA"/>
</dbReference>
<dbReference type="EMBL" id="MW493824">
    <property type="protein sequence ID" value="QQV23497.1"/>
    <property type="molecule type" value="Genomic_RNA"/>
</dbReference>
<dbReference type="EMBL" id="MW493825">
    <property type="protein sequence ID" value="QQV23509.1"/>
    <property type="molecule type" value="Genomic_RNA"/>
</dbReference>
<dbReference type="EMBL" id="MW493826">
    <property type="protein sequence ID" value="QQV23521.1"/>
    <property type="molecule type" value="Genomic_RNA"/>
</dbReference>
<dbReference type="EMBL" id="MW493827">
    <property type="protein sequence ID" value="QQV23533.1"/>
    <property type="molecule type" value="Genomic_RNA"/>
</dbReference>
<dbReference type="EMBL" id="MW493828">
    <property type="protein sequence ID" value="QQV23545.1"/>
    <property type="molecule type" value="Genomic_RNA"/>
</dbReference>
<dbReference type="EMBL" id="MW493829">
    <property type="protein sequence ID" value="QQV23557.1"/>
    <property type="molecule type" value="Genomic_RNA"/>
</dbReference>
<dbReference type="EMBL" id="MW493830">
    <property type="protein sequence ID" value="QQV23569.1"/>
    <property type="molecule type" value="Genomic_RNA"/>
</dbReference>
<dbReference type="EMBL" id="MW493831">
    <property type="protein sequence ID" value="QQV23581.1"/>
    <property type="molecule type" value="Genomic_RNA"/>
</dbReference>
<dbReference type="EMBL" id="MW493832">
    <property type="protein sequence ID" value="QQV23593.1"/>
    <property type="molecule type" value="Genomic_RNA"/>
</dbReference>
<dbReference type="EMBL" id="MW493833">
    <property type="protein sequence ID" value="QQV23605.1"/>
    <property type="molecule type" value="Genomic_RNA"/>
</dbReference>
<dbReference type="EMBL" id="MW493834">
    <property type="protein sequence ID" value="QQV23617.1"/>
    <property type="molecule type" value="Genomic_RNA"/>
</dbReference>
<dbReference type="EMBL" id="MW493835">
    <property type="protein sequence ID" value="QQV23629.1"/>
    <property type="molecule type" value="Genomic_RNA"/>
</dbReference>
<dbReference type="EMBL" id="MW493836">
    <property type="protein sequence ID" value="QQV23641.1"/>
    <property type="molecule type" value="Genomic_RNA"/>
</dbReference>
<dbReference type="EMBL" id="MW493837">
    <property type="protein sequence ID" value="QQV23653.1"/>
    <property type="molecule type" value="Genomic_RNA"/>
</dbReference>
<dbReference type="EMBL" id="MW493838">
    <property type="protein sequence ID" value="QQV23665.1"/>
    <property type="molecule type" value="Genomic_RNA"/>
</dbReference>
<dbReference type="EMBL" id="MW493839">
    <property type="protein sequence ID" value="QQV23677.1"/>
    <property type="molecule type" value="Genomic_RNA"/>
</dbReference>
<dbReference type="EMBL" id="MW493840">
    <property type="protein sequence ID" value="QQV23689.1"/>
    <property type="molecule type" value="Genomic_RNA"/>
</dbReference>
<dbReference type="EMBL" id="MW493841">
    <property type="protein sequence ID" value="QQV23701.1"/>
    <property type="molecule type" value="Genomic_RNA"/>
</dbReference>
<dbReference type="EMBL" id="MW493842">
    <property type="protein sequence ID" value="QQV23713.1"/>
    <property type="molecule type" value="Genomic_RNA"/>
</dbReference>
<dbReference type="EMBL" id="MW493843">
    <property type="protein sequence ID" value="QQV23725.1"/>
    <property type="molecule type" value="Genomic_RNA"/>
</dbReference>
<dbReference type="EMBL" id="MW493844">
    <property type="protein sequence ID" value="QQV23737.1"/>
    <property type="molecule type" value="Genomic_RNA"/>
</dbReference>
<dbReference type="EMBL" id="MW493845">
    <property type="protein sequence ID" value="QQV23749.1"/>
    <property type="molecule type" value="Genomic_RNA"/>
</dbReference>
<dbReference type="EMBL" id="MW493846">
    <property type="protein sequence ID" value="QQV23761.1"/>
    <property type="molecule type" value="Genomic_RNA"/>
</dbReference>
<dbReference type="EMBL" id="MW493847">
    <property type="protein sequence ID" value="QQV23773.1"/>
    <property type="molecule type" value="Genomic_RNA"/>
</dbReference>
<dbReference type="EMBL" id="MW493848">
    <property type="protein sequence ID" value="QQV23785.1"/>
    <property type="molecule type" value="Genomic_RNA"/>
</dbReference>
<dbReference type="EMBL" id="MW493849">
    <property type="protein sequence ID" value="QQV23797.1"/>
    <property type="molecule type" value="Genomic_RNA"/>
</dbReference>
<dbReference type="EMBL" id="MW493850">
    <property type="protein sequence ID" value="QQV23809.1"/>
    <property type="molecule type" value="Genomic_RNA"/>
</dbReference>
<dbReference type="EMBL" id="MW493851">
    <property type="protein sequence ID" value="QQV23821.1"/>
    <property type="molecule type" value="Genomic_RNA"/>
</dbReference>
<dbReference type="EMBL" id="MW493852">
    <property type="protein sequence ID" value="QQV23833.1"/>
    <property type="molecule type" value="Genomic_RNA"/>
</dbReference>
<dbReference type="EMBL" id="MW493853">
    <property type="protein sequence ID" value="QQV23845.1"/>
    <property type="molecule type" value="Genomic_RNA"/>
</dbReference>
<dbReference type="EMBL" id="MW493854">
    <property type="protein sequence ID" value="QQV23857.1"/>
    <property type="molecule type" value="Genomic_RNA"/>
</dbReference>
<dbReference type="EMBL" id="MW493855">
    <property type="protein sequence ID" value="QQV23869.1"/>
    <property type="molecule type" value="Genomic_RNA"/>
</dbReference>
<dbReference type="EMBL" id="MW493856">
    <property type="protein sequence ID" value="QQV23881.1"/>
    <property type="molecule type" value="Genomic_RNA"/>
</dbReference>
<dbReference type="EMBL" id="MW493857">
    <property type="protein sequence ID" value="QQV23893.1"/>
    <property type="molecule type" value="Genomic_RNA"/>
</dbReference>
<dbReference type="EMBL" id="MW493858">
    <property type="protein sequence ID" value="QQV23905.1"/>
    <property type="molecule type" value="Genomic_RNA"/>
</dbReference>
<dbReference type="EMBL" id="MW493859">
    <property type="protein sequence ID" value="QQV23917.1"/>
    <property type="molecule type" value="Genomic_RNA"/>
</dbReference>
<dbReference type="EMBL" id="MW493860">
    <property type="protein sequence ID" value="QQV23929.1"/>
    <property type="molecule type" value="Genomic_RNA"/>
</dbReference>
<dbReference type="EMBL" id="MW493861">
    <property type="protein sequence ID" value="QQV23941.1"/>
    <property type="molecule type" value="Genomic_RNA"/>
</dbReference>
<dbReference type="EMBL" id="MW493862">
    <property type="protein sequence ID" value="QQV23953.1"/>
    <property type="molecule type" value="Genomic_RNA"/>
</dbReference>
<dbReference type="EMBL" id="MW493863">
    <property type="protein sequence ID" value="QQV23965.1"/>
    <property type="molecule type" value="Genomic_RNA"/>
</dbReference>
<dbReference type="EMBL" id="MW494162">
    <property type="protein sequence ID" value="QQV26781.1"/>
    <property type="molecule type" value="Genomic_RNA"/>
</dbReference>
<dbReference type="EMBL" id="MW494163">
    <property type="protein sequence ID" value="QQV26793.1"/>
    <property type="molecule type" value="Genomic_RNA"/>
</dbReference>
<dbReference type="EMBL" id="MW494164">
    <property type="protein sequence ID" value="QQV26805.1"/>
    <property type="molecule type" value="Genomic_RNA"/>
</dbReference>
<dbReference type="EMBL" id="MW494165">
    <property type="protein sequence ID" value="QQV26817.1"/>
    <property type="molecule type" value="Genomic_RNA"/>
</dbReference>
<dbReference type="EMBL" id="MW494166">
    <property type="protein sequence ID" value="QQV26829.1"/>
    <property type="molecule type" value="Genomic_RNA"/>
</dbReference>
<dbReference type="EMBL" id="MW494167">
    <property type="protein sequence ID" value="QQV26841.1"/>
    <property type="molecule type" value="Genomic_RNA"/>
</dbReference>
<dbReference type="EMBL" id="MW494168">
    <property type="protein sequence ID" value="QQV26853.1"/>
    <property type="molecule type" value="Genomic_RNA"/>
</dbReference>
<dbReference type="EMBL" id="MW494169">
    <property type="protein sequence ID" value="QQV26865.1"/>
    <property type="molecule type" value="Genomic_RNA"/>
</dbReference>
<dbReference type="EMBL" id="MW494170">
    <property type="protein sequence ID" value="QQV26877.1"/>
    <property type="molecule type" value="Genomic_RNA"/>
</dbReference>
<dbReference type="EMBL" id="MW494171">
    <property type="protein sequence ID" value="QQV26889.1"/>
    <property type="molecule type" value="Genomic_RNA"/>
</dbReference>
<dbReference type="EMBL" id="MW494172">
    <property type="protein sequence ID" value="QQV26901.1"/>
    <property type="molecule type" value="Genomic_RNA"/>
</dbReference>
<dbReference type="EMBL" id="MW494173">
    <property type="protein sequence ID" value="QQV26913.1"/>
    <property type="molecule type" value="Genomic_RNA"/>
</dbReference>
<dbReference type="EMBL" id="MW494174">
    <property type="protein sequence ID" value="QQV26925.1"/>
    <property type="molecule type" value="Genomic_RNA"/>
</dbReference>
<dbReference type="EMBL" id="MW494175">
    <property type="protein sequence ID" value="QQV26937.1"/>
    <property type="molecule type" value="Genomic_RNA"/>
</dbReference>
<dbReference type="EMBL" id="MW494176">
    <property type="protein sequence ID" value="QQV26949.1"/>
    <property type="molecule type" value="Genomic_RNA"/>
</dbReference>
<dbReference type="EMBL" id="MW494177">
    <property type="protein sequence ID" value="QQV26961.1"/>
    <property type="molecule type" value="Genomic_RNA"/>
</dbReference>
<dbReference type="EMBL" id="MW494178">
    <property type="protein sequence ID" value="QQV26973.1"/>
    <property type="molecule type" value="Genomic_RNA"/>
</dbReference>
<dbReference type="EMBL" id="MW494179">
    <property type="protein sequence ID" value="QQV26985.1"/>
    <property type="molecule type" value="Genomic_RNA"/>
</dbReference>
<dbReference type="EMBL" id="MW494180">
    <property type="protein sequence ID" value="QQV26997.1"/>
    <property type="molecule type" value="Genomic_RNA"/>
</dbReference>
<dbReference type="EMBL" id="MW494181">
    <property type="protein sequence ID" value="QQV27009.1"/>
    <property type="molecule type" value="Genomic_RNA"/>
</dbReference>
<dbReference type="EMBL" id="MW494182">
    <property type="protein sequence ID" value="QQV27021.1"/>
    <property type="molecule type" value="Genomic_RNA"/>
</dbReference>
<dbReference type="EMBL" id="MW494183">
    <property type="protein sequence ID" value="QQV27033.1"/>
    <property type="molecule type" value="Genomic_RNA"/>
</dbReference>
<dbReference type="EMBL" id="MW494184">
    <property type="protein sequence ID" value="QQV27045.1"/>
    <property type="molecule type" value="Genomic_RNA"/>
</dbReference>
<dbReference type="EMBL" id="MW494185">
    <property type="protein sequence ID" value="QQV27057.1"/>
    <property type="molecule type" value="Genomic_RNA"/>
</dbReference>
<dbReference type="EMBL" id="MW494186">
    <property type="protein sequence ID" value="QQV27069.1"/>
    <property type="molecule type" value="Genomic_RNA"/>
</dbReference>
<dbReference type="EMBL" id="MW494187">
    <property type="protein sequence ID" value="QQV27081.1"/>
    <property type="molecule type" value="Genomic_RNA"/>
</dbReference>
<dbReference type="EMBL" id="MW494188">
    <property type="protein sequence ID" value="QQV27093.1"/>
    <property type="molecule type" value="Genomic_RNA"/>
</dbReference>
<dbReference type="EMBL" id="MW494189">
    <property type="protein sequence ID" value="QQV27105.1"/>
    <property type="molecule type" value="Genomic_RNA"/>
</dbReference>
<dbReference type="EMBL" id="MW494190">
    <property type="protein sequence ID" value="QQV27117.1"/>
    <property type="molecule type" value="Genomic_RNA"/>
</dbReference>
<dbReference type="EMBL" id="MW494191">
    <property type="protein sequence ID" value="QQV27129.1"/>
    <property type="molecule type" value="Genomic_RNA"/>
</dbReference>
<dbReference type="EMBL" id="MW494192">
    <property type="protein sequence ID" value="QQV27141.1"/>
    <property type="molecule type" value="Genomic_RNA"/>
</dbReference>
<dbReference type="EMBL" id="MW494193">
    <property type="protein sequence ID" value="QQV27153.1"/>
    <property type="molecule type" value="Genomic_RNA"/>
</dbReference>
<dbReference type="EMBL" id="MW494194">
    <property type="protein sequence ID" value="QQV27165.1"/>
    <property type="molecule type" value="Genomic_RNA"/>
</dbReference>
<dbReference type="EMBL" id="MW494195">
    <property type="protein sequence ID" value="QQV27177.1"/>
    <property type="molecule type" value="Genomic_RNA"/>
</dbReference>
<dbReference type="EMBL" id="MW494196">
    <property type="protein sequence ID" value="QQV27189.1"/>
    <property type="molecule type" value="Genomic_RNA"/>
</dbReference>
<dbReference type="EMBL" id="MW494197">
    <property type="protein sequence ID" value="QQV27201.1"/>
    <property type="molecule type" value="Genomic_RNA"/>
</dbReference>
<dbReference type="EMBL" id="MW494198">
    <property type="protein sequence ID" value="QQV27213.1"/>
    <property type="molecule type" value="Genomic_RNA"/>
</dbReference>
<dbReference type="EMBL" id="MW494199">
    <property type="protein sequence ID" value="QQV27225.1"/>
    <property type="molecule type" value="Genomic_RNA"/>
</dbReference>
<dbReference type="EMBL" id="MW494200">
    <property type="protein sequence ID" value="QQV27237.1"/>
    <property type="molecule type" value="Genomic_RNA"/>
</dbReference>
<dbReference type="EMBL" id="MW494201">
    <property type="protein sequence ID" value="QQV27249.1"/>
    <property type="molecule type" value="Genomic_RNA"/>
</dbReference>
<dbReference type="EMBL" id="MW494202">
    <property type="protein sequence ID" value="QQV27261.1"/>
    <property type="molecule type" value="Genomic_RNA"/>
</dbReference>
<dbReference type="EMBL" id="MW494203">
    <property type="protein sequence ID" value="QQV27273.1"/>
    <property type="molecule type" value="Genomic_RNA"/>
</dbReference>
<dbReference type="EMBL" id="MW494204">
    <property type="protein sequence ID" value="QQV27285.1"/>
    <property type="molecule type" value="Genomic_RNA"/>
</dbReference>
<dbReference type="EMBL" id="MW494205">
    <property type="protein sequence ID" value="QQV27297.1"/>
    <property type="molecule type" value="Genomic_RNA"/>
</dbReference>
<dbReference type="EMBL" id="MW494206">
    <property type="protein sequence ID" value="QQV27309.1"/>
    <property type="molecule type" value="Genomic_RNA"/>
</dbReference>
<dbReference type="EMBL" id="MW494207">
    <property type="protein sequence ID" value="QQV27321.1"/>
    <property type="molecule type" value="Genomic_RNA"/>
</dbReference>
<dbReference type="EMBL" id="MW494208">
    <property type="protein sequence ID" value="QQV27333.1"/>
    <property type="molecule type" value="Genomic_RNA"/>
</dbReference>
<dbReference type="EMBL" id="MW494209">
    <property type="protein sequence ID" value="QQV27345.1"/>
    <property type="molecule type" value="Genomic_RNA"/>
</dbReference>
<dbReference type="EMBL" id="MW494210">
    <property type="protein sequence ID" value="QQV27357.1"/>
    <property type="molecule type" value="Genomic_RNA"/>
</dbReference>
<dbReference type="EMBL" id="MW494211">
    <property type="protein sequence ID" value="QQV27369.1"/>
    <property type="molecule type" value="Genomic_RNA"/>
</dbReference>
<dbReference type="EMBL" id="MW494212">
    <property type="protein sequence ID" value="QQV27381.1"/>
    <property type="molecule type" value="Genomic_RNA"/>
</dbReference>
<dbReference type="EMBL" id="MW494213">
    <property type="protein sequence ID" value="QQV27393.1"/>
    <property type="molecule type" value="Genomic_RNA"/>
</dbReference>
<dbReference type="EMBL" id="MW494214">
    <property type="protein sequence ID" value="QQV27405.1"/>
    <property type="molecule type" value="Genomic_RNA"/>
</dbReference>
<dbReference type="EMBL" id="MW494215">
    <property type="protein sequence ID" value="QQV27417.1"/>
    <property type="molecule type" value="Genomic_RNA"/>
</dbReference>
<dbReference type="EMBL" id="MW494216">
    <property type="protein sequence ID" value="QQV27429.1"/>
    <property type="molecule type" value="Genomic_RNA"/>
</dbReference>
<dbReference type="EMBL" id="MW494217">
    <property type="protein sequence ID" value="QQV27441.1"/>
    <property type="molecule type" value="Genomic_RNA"/>
</dbReference>
<dbReference type="EMBL" id="MW494218">
    <property type="protein sequence ID" value="QQV27453.1"/>
    <property type="molecule type" value="Genomic_RNA"/>
</dbReference>
<dbReference type="EMBL" id="MW494219">
    <property type="protein sequence ID" value="QQV27465.1"/>
    <property type="molecule type" value="Genomic_RNA"/>
</dbReference>
<dbReference type="EMBL" id="MW494220">
    <property type="protein sequence ID" value="QQV27477.1"/>
    <property type="molecule type" value="Genomic_RNA"/>
</dbReference>
<dbReference type="EMBL" id="MW494221">
    <property type="protein sequence ID" value="QQV27489.1"/>
    <property type="molecule type" value="Genomic_RNA"/>
</dbReference>
<dbReference type="EMBL" id="MW494222">
    <property type="protein sequence ID" value="QQV27501.1"/>
    <property type="molecule type" value="Genomic_RNA"/>
</dbReference>
<dbReference type="EMBL" id="MW494223">
    <property type="protein sequence ID" value="QQV27513.1"/>
    <property type="molecule type" value="Genomic_RNA"/>
</dbReference>
<dbReference type="EMBL" id="MW494224">
    <property type="protein sequence ID" value="QQV27525.1"/>
    <property type="molecule type" value="Genomic_RNA"/>
</dbReference>
<dbReference type="EMBL" id="MW494225">
    <property type="protein sequence ID" value="QQV27537.1"/>
    <property type="molecule type" value="Genomic_RNA"/>
</dbReference>
<dbReference type="EMBL" id="MW494226">
    <property type="protein sequence ID" value="QQV27549.1"/>
    <property type="molecule type" value="Genomic_RNA"/>
</dbReference>
<dbReference type="EMBL" id="MW494227">
    <property type="protein sequence ID" value="QQV27561.1"/>
    <property type="molecule type" value="Genomic_RNA"/>
</dbReference>
<dbReference type="EMBL" id="MW494228">
    <property type="protein sequence ID" value="QQV27573.1"/>
    <property type="molecule type" value="Genomic_RNA"/>
</dbReference>
<dbReference type="EMBL" id="MW494229">
    <property type="protein sequence ID" value="QQV27585.1"/>
    <property type="molecule type" value="Genomic_RNA"/>
</dbReference>
<dbReference type="EMBL" id="MW494230">
    <property type="protein sequence ID" value="QQV27597.1"/>
    <property type="molecule type" value="Genomic_RNA"/>
</dbReference>
<dbReference type="EMBL" id="MW494231">
    <property type="protein sequence ID" value="QQV27609.1"/>
    <property type="molecule type" value="Genomic_RNA"/>
</dbReference>
<dbReference type="EMBL" id="MW494232">
    <property type="protein sequence ID" value="QQV27621.1"/>
    <property type="molecule type" value="Genomic_RNA"/>
</dbReference>
<dbReference type="EMBL" id="MW494233">
    <property type="protein sequence ID" value="QQV27633.1"/>
    <property type="molecule type" value="Genomic_RNA"/>
</dbReference>
<dbReference type="EMBL" id="MW494234">
    <property type="protein sequence ID" value="QQV27645.1"/>
    <property type="molecule type" value="Genomic_RNA"/>
</dbReference>
<dbReference type="EMBL" id="MW494235">
    <property type="protein sequence ID" value="QQV27657.1"/>
    <property type="molecule type" value="Genomic_RNA"/>
</dbReference>
<dbReference type="EMBL" id="MW494236">
    <property type="protein sequence ID" value="QQV27669.1"/>
    <property type="molecule type" value="Genomic_RNA"/>
</dbReference>
<dbReference type="EMBL" id="MW494237">
    <property type="protein sequence ID" value="QQV27681.1"/>
    <property type="molecule type" value="Genomic_RNA"/>
</dbReference>
<dbReference type="EMBL" id="MW494238">
    <property type="protein sequence ID" value="QQV27693.1"/>
    <property type="molecule type" value="Genomic_RNA"/>
</dbReference>
<dbReference type="EMBL" id="MW494239">
    <property type="protein sequence ID" value="QQV27705.1"/>
    <property type="molecule type" value="Genomic_RNA"/>
</dbReference>
<dbReference type="EMBL" id="MW494240">
    <property type="protein sequence ID" value="QQV27717.1"/>
    <property type="molecule type" value="Genomic_RNA"/>
</dbReference>
<dbReference type="EMBL" id="MW494241">
    <property type="protein sequence ID" value="QQV27729.1"/>
    <property type="molecule type" value="Genomic_RNA"/>
</dbReference>
<dbReference type="EMBL" id="MW494242">
    <property type="protein sequence ID" value="QQV27741.1"/>
    <property type="molecule type" value="Genomic_RNA"/>
</dbReference>
<dbReference type="EMBL" id="MW494243">
    <property type="protein sequence ID" value="QQV27753.1"/>
    <property type="molecule type" value="Genomic_RNA"/>
</dbReference>
<dbReference type="EMBL" id="MW494244">
    <property type="protein sequence ID" value="QQV27765.1"/>
    <property type="molecule type" value="Genomic_RNA"/>
</dbReference>
<dbReference type="EMBL" id="MW494245">
    <property type="protein sequence ID" value="QQV27777.1"/>
    <property type="molecule type" value="Genomic_RNA"/>
</dbReference>
<dbReference type="EMBL" id="MW494246">
    <property type="protein sequence ID" value="QQV27789.1"/>
    <property type="molecule type" value="Genomic_RNA"/>
</dbReference>
<dbReference type="EMBL" id="MW494247">
    <property type="protein sequence ID" value="QQV27801.1"/>
    <property type="molecule type" value="Genomic_RNA"/>
</dbReference>
<dbReference type="EMBL" id="MW494248">
    <property type="protein sequence ID" value="QQV27813.1"/>
    <property type="molecule type" value="Genomic_RNA"/>
</dbReference>
<dbReference type="EMBL" id="MW494249">
    <property type="protein sequence ID" value="QQV27825.1"/>
    <property type="molecule type" value="Genomic_RNA"/>
</dbReference>
<dbReference type="EMBL" id="MW494250">
    <property type="protein sequence ID" value="QQV27837.1"/>
    <property type="molecule type" value="Genomic_RNA"/>
</dbReference>
<dbReference type="EMBL" id="MW494251">
    <property type="protein sequence ID" value="QQV27849.1"/>
    <property type="molecule type" value="Genomic_RNA"/>
</dbReference>
<dbReference type="EMBL" id="MW494252">
    <property type="protein sequence ID" value="QQV27861.1"/>
    <property type="molecule type" value="Genomic_RNA"/>
</dbReference>
<dbReference type="EMBL" id="MW494253">
    <property type="protein sequence ID" value="QQV27873.1"/>
    <property type="molecule type" value="Genomic_RNA"/>
</dbReference>
<dbReference type="EMBL" id="MW494254">
    <property type="protein sequence ID" value="QQV27885.1"/>
    <property type="molecule type" value="Genomic_RNA"/>
</dbReference>
<dbReference type="EMBL" id="MW494255">
    <property type="protein sequence ID" value="QQV27897.1"/>
    <property type="molecule type" value="Genomic_RNA"/>
</dbReference>
<dbReference type="EMBL" id="MW494256">
    <property type="protein sequence ID" value="QQV27909.1"/>
    <property type="molecule type" value="Genomic_RNA"/>
</dbReference>
<dbReference type="EMBL" id="MW494257">
    <property type="protein sequence ID" value="QQV27921.1"/>
    <property type="molecule type" value="Genomic_RNA"/>
</dbReference>
<dbReference type="EMBL" id="MW494258">
    <property type="protein sequence ID" value="QQV27933.1"/>
    <property type="molecule type" value="Genomic_RNA"/>
</dbReference>
<dbReference type="EMBL" id="MW494259">
    <property type="protein sequence ID" value="QQV27945.1"/>
    <property type="molecule type" value="Genomic_RNA"/>
</dbReference>
<dbReference type="EMBL" id="MW494260">
    <property type="protein sequence ID" value="QQV27957.1"/>
    <property type="molecule type" value="Genomic_RNA"/>
</dbReference>
<dbReference type="EMBL" id="MW494261">
    <property type="protein sequence ID" value="QQV27969.1"/>
    <property type="molecule type" value="Genomic_RNA"/>
</dbReference>
<dbReference type="EMBL" id="MW494262">
    <property type="protein sequence ID" value="QQV27981.1"/>
    <property type="molecule type" value="Genomic_RNA"/>
</dbReference>
<dbReference type="EMBL" id="MW494263">
    <property type="protein sequence ID" value="QQV27993.1"/>
    <property type="molecule type" value="Genomic_RNA"/>
</dbReference>
<dbReference type="EMBL" id="MW494264">
    <property type="protein sequence ID" value="QQV28005.1"/>
    <property type="molecule type" value="Genomic_RNA"/>
</dbReference>
<dbReference type="EMBL" id="MW494265">
    <property type="protein sequence ID" value="QQV28017.1"/>
    <property type="molecule type" value="Genomic_RNA"/>
</dbReference>
<dbReference type="EMBL" id="MW494266">
    <property type="protein sequence ID" value="QQV28029.1"/>
    <property type="molecule type" value="Genomic_RNA"/>
</dbReference>
<dbReference type="EMBL" id="MW494267">
    <property type="protein sequence ID" value="QQV28041.1"/>
    <property type="molecule type" value="Genomic_RNA"/>
</dbReference>
<dbReference type="EMBL" id="MW494268">
    <property type="protein sequence ID" value="QQV28053.1"/>
    <property type="molecule type" value="Genomic_RNA"/>
</dbReference>
<dbReference type="EMBL" id="MW494269">
    <property type="protein sequence ID" value="QQV28065.1"/>
    <property type="molecule type" value="Genomic_RNA"/>
</dbReference>
<dbReference type="EMBL" id="MW494270">
    <property type="protein sequence ID" value="QQV28077.1"/>
    <property type="molecule type" value="Genomic_RNA"/>
</dbReference>
<dbReference type="EMBL" id="MW494271">
    <property type="protein sequence ID" value="QQV28089.1"/>
    <property type="molecule type" value="Genomic_RNA"/>
</dbReference>
<dbReference type="EMBL" id="MW494272">
    <property type="protein sequence ID" value="QQV28101.1"/>
    <property type="molecule type" value="Genomic_RNA"/>
</dbReference>
<dbReference type="EMBL" id="MW494273">
    <property type="protein sequence ID" value="QQV28113.1"/>
    <property type="molecule type" value="Genomic_RNA"/>
</dbReference>
<dbReference type="EMBL" id="MW494274">
    <property type="protein sequence ID" value="QQV28125.1"/>
    <property type="molecule type" value="Genomic_RNA"/>
</dbReference>
<dbReference type="EMBL" id="MW494275">
    <property type="protein sequence ID" value="QQV28137.1"/>
    <property type="molecule type" value="Genomic_RNA"/>
</dbReference>
<dbReference type="EMBL" id="MW494276">
    <property type="protein sequence ID" value="QQV28149.1"/>
    <property type="molecule type" value="Genomic_RNA"/>
</dbReference>
<dbReference type="EMBL" id="MW494277">
    <property type="protein sequence ID" value="QQV28161.1"/>
    <property type="molecule type" value="Genomic_RNA"/>
</dbReference>
<dbReference type="EMBL" id="MW494278">
    <property type="protein sequence ID" value="QQV28173.1"/>
    <property type="molecule type" value="Genomic_RNA"/>
</dbReference>
<dbReference type="EMBL" id="MW494279">
    <property type="protein sequence ID" value="QQV28185.1"/>
    <property type="molecule type" value="Genomic_RNA"/>
</dbReference>
<dbReference type="EMBL" id="MW494280">
    <property type="protein sequence ID" value="QQV28197.1"/>
    <property type="molecule type" value="Genomic_RNA"/>
</dbReference>
<dbReference type="EMBL" id="MW494281">
    <property type="protein sequence ID" value="QQV28209.1"/>
    <property type="molecule type" value="Genomic_RNA"/>
</dbReference>
<dbReference type="EMBL" id="MW494282">
    <property type="protein sequence ID" value="QQV28221.1"/>
    <property type="molecule type" value="Genomic_RNA"/>
</dbReference>
<dbReference type="EMBL" id="MW494283">
    <property type="protein sequence ID" value="QQV28233.1"/>
    <property type="molecule type" value="Genomic_RNA"/>
</dbReference>
<dbReference type="EMBL" id="MW494284">
    <property type="protein sequence ID" value="QQV28245.1"/>
    <property type="molecule type" value="Genomic_RNA"/>
</dbReference>
<dbReference type="EMBL" id="MW494285">
    <property type="protein sequence ID" value="QQV28257.1"/>
    <property type="molecule type" value="Genomic_RNA"/>
</dbReference>
<dbReference type="EMBL" id="MW494286">
    <property type="protein sequence ID" value="QQV28269.1"/>
    <property type="molecule type" value="Genomic_RNA"/>
</dbReference>
<dbReference type="EMBL" id="MW494287">
    <property type="protein sequence ID" value="QQV28281.1"/>
    <property type="molecule type" value="Genomic_RNA"/>
</dbReference>
<dbReference type="EMBL" id="MW494288">
    <property type="protein sequence ID" value="QQV28293.1"/>
    <property type="molecule type" value="Genomic_RNA"/>
</dbReference>
<dbReference type="EMBL" id="MW494289">
    <property type="protein sequence ID" value="QQV28305.1"/>
    <property type="molecule type" value="Genomic_RNA"/>
</dbReference>
<dbReference type="EMBL" id="MW494290">
    <property type="protein sequence ID" value="QQV28317.1"/>
    <property type="molecule type" value="Genomic_RNA"/>
</dbReference>
<dbReference type="EMBL" id="MW494291">
    <property type="protein sequence ID" value="QQV28329.1"/>
    <property type="molecule type" value="Genomic_RNA"/>
</dbReference>
<dbReference type="EMBL" id="MW494292">
    <property type="protein sequence ID" value="QQV28341.1"/>
    <property type="molecule type" value="Genomic_RNA"/>
</dbReference>
<dbReference type="EMBL" id="MW494293">
    <property type="protein sequence ID" value="QQV28353.1"/>
    <property type="molecule type" value="Genomic_RNA"/>
</dbReference>
<dbReference type="EMBL" id="MW494294">
    <property type="protein sequence ID" value="QQV28365.1"/>
    <property type="molecule type" value="Genomic_RNA"/>
</dbReference>
<dbReference type="EMBL" id="MW494295">
    <property type="protein sequence ID" value="QQV28377.1"/>
    <property type="molecule type" value="Genomic_RNA"/>
</dbReference>
<dbReference type="EMBL" id="MW494296">
    <property type="protein sequence ID" value="QQV28389.1"/>
    <property type="molecule type" value="Genomic_RNA"/>
</dbReference>
<dbReference type="EMBL" id="MW494297">
    <property type="protein sequence ID" value="QQV28401.1"/>
    <property type="molecule type" value="Genomic_RNA"/>
</dbReference>
<dbReference type="EMBL" id="MW494298">
    <property type="protein sequence ID" value="QQV28413.1"/>
    <property type="molecule type" value="Genomic_RNA"/>
</dbReference>
<dbReference type="EMBL" id="MW494299">
    <property type="protein sequence ID" value="QQV28425.1"/>
    <property type="molecule type" value="Genomic_RNA"/>
</dbReference>
<dbReference type="EMBL" id="MW494300">
    <property type="protein sequence ID" value="QQV28437.1"/>
    <property type="molecule type" value="Genomic_RNA"/>
</dbReference>
<dbReference type="EMBL" id="MW494301">
    <property type="protein sequence ID" value="QQV28449.1"/>
    <property type="molecule type" value="Genomic_RNA"/>
</dbReference>
<dbReference type="EMBL" id="MW494302">
    <property type="protein sequence ID" value="QQV28461.1"/>
    <property type="molecule type" value="Genomic_RNA"/>
</dbReference>
<dbReference type="EMBL" id="MW494303">
    <property type="protein sequence ID" value="QQV28473.1"/>
    <property type="molecule type" value="Genomic_RNA"/>
</dbReference>
<dbReference type="EMBL" id="MW494304">
    <property type="protein sequence ID" value="QQV28485.1"/>
    <property type="molecule type" value="Genomic_RNA"/>
</dbReference>
<dbReference type="EMBL" id="MW494305">
    <property type="protein sequence ID" value="QQV28497.1"/>
    <property type="molecule type" value="Genomic_RNA"/>
</dbReference>
<dbReference type="EMBL" id="MW494306">
    <property type="protein sequence ID" value="QQV28509.1"/>
    <property type="molecule type" value="Genomic_RNA"/>
</dbReference>
<dbReference type="EMBL" id="MW494307">
    <property type="protein sequence ID" value="QQV28521.1"/>
    <property type="molecule type" value="Genomic_RNA"/>
</dbReference>
<dbReference type="EMBL" id="MW494308">
    <property type="protein sequence ID" value="QQV28533.1"/>
    <property type="molecule type" value="Genomic_RNA"/>
</dbReference>
<dbReference type="EMBL" id="MW494309">
    <property type="protein sequence ID" value="QQV28545.1"/>
    <property type="molecule type" value="Genomic_RNA"/>
</dbReference>
<dbReference type="EMBL" id="MW494310">
    <property type="protein sequence ID" value="QQV28557.1"/>
    <property type="molecule type" value="Genomic_RNA"/>
</dbReference>
<dbReference type="EMBL" id="MW494311">
    <property type="protein sequence ID" value="QQV28569.1"/>
    <property type="molecule type" value="Genomic_RNA"/>
</dbReference>
<dbReference type="EMBL" id="MW494312">
    <property type="protein sequence ID" value="QQV28581.1"/>
    <property type="molecule type" value="Genomic_RNA"/>
</dbReference>
<dbReference type="EMBL" id="MW494313">
    <property type="protein sequence ID" value="QQV28593.1"/>
    <property type="molecule type" value="Genomic_RNA"/>
</dbReference>
<dbReference type="EMBL" id="MW494314">
    <property type="protein sequence ID" value="QQV28605.1"/>
    <property type="molecule type" value="Genomic_RNA"/>
</dbReference>
<dbReference type="EMBL" id="MW494315">
    <property type="protein sequence ID" value="QQV28617.1"/>
    <property type="molecule type" value="Genomic_RNA"/>
</dbReference>
<dbReference type="EMBL" id="MW577029">
    <property type="protein sequence ID" value="QRG41699.1"/>
    <property type="molecule type" value="Genomic_RNA"/>
</dbReference>
<dbReference type="EMBL" id="MW672622">
    <property type="protein sequence ID" value="QSE99514.1"/>
    <property type="molecule type" value="Genomic_RNA"/>
</dbReference>
<dbReference type="EMBL" id="MW672623">
    <property type="protein sequence ID" value="QSE99526.1"/>
    <property type="molecule type" value="Genomic_RNA"/>
</dbReference>
<dbReference type="EMBL" id="MW672624">
    <property type="protein sequence ID" value="QSE99538.1"/>
    <property type="molecule type" value="Genomic_RNA"/>
</dbReference>
<dbReference type="EMBL" id="MW672625">
    <property type="protein sequence ID" value="QSE99550.1"/>
    <property type="molecule type" value="Genomic_RNA"/>
</dbReference>
<dbReference type="EMBL" id="MW672626">
    <property type="protein sequence ID" value="QSE99562.1"/>
    <property type="molecule type" value="Genomic_RNA"/>
</dbReference>
<dbReference type="EMBL" id="MW672627">
    <property type="protein sequence ID" value="QSE99574.1"/>
    <property type="molecule type" value="Genomic_RNA"/>
</dbReference>
<dbReference type="EMBL" id="MW672628">
    <property type="protein sequence ID" value="QSE99586.1"/>
    <property type="molecule type" value="Genomic_RNA"/>
</dbReference>
<dbReference type="EMBL" id="MW672629">
    <property type="protein sequence ID" value="QSE99598.1"/>
    <property type="molecule type" value="Genomic_RNA"/>
</dbReference>
<dbReference type="EMBL" id="MW672630">
    <property type="protein sequence ID" value="QSE99610.1"/>
    <property type="molecule type" value="Genomic_RNA"/>
</dbReference>
<dbReference type="EMBL" id="MW672631">
    <property type="protein sequence ID" value="QSE99622.1"/>
    <property type="molecule type" value="Genomic_RNA"/>
</dbReference>
<dbReference type="EMBL" id="MW672632">
    <property type="protein sequence ID" value="QSE99634.1"/>
    <property type="molecule type" value="Genomic_RNA"/>
</dbReference>
<dbReference type="EMBL" id="MW672633">
    <property type="protein sequence ID" value="QSE99646.1"/>
    <property type="molecule type" value="Genomic_RNA"/>
</dbReference>
<dbReference type="EMBL" id="MW672634">
    <property type="protein sequence ID" value="QSE99658.1"/>
    <property type="molecule type" value="Genomic_RNA"/>
</dbReference>
<dbReference type="EMBL" id="MW672635">
    <property type="protein sequence ID" value="QSE99670.1"/>
    <property type="molecule type" value="Genomic_RNA"/>
</dbReference>
<dbReference type="EMBL" id="MW672636">
    <property type="protein sequence ID" value="QSE99682.1"/>
    <property type="molecule type" value="Genomic_RNA"/>
</dbReference>
<dbReference type="EMBL" id="MW672637">
    <property type="protein sequence ID" value="QSE99694.1"/>
    <property type="molecule type" value="Genomic_RNA"/>
</dbReference>
<dbReference type="EMBL" id="MW672638">
    <property type="protein sequence ID" value="QSE99706.1"/>
    <property type="molecule type" value="Genomic_RNA"/>
</dbReference>
<dbReference type="EMBL" id="MW672639">
    <property type="protein sequence ID" value="QSE99718.1"/>
    <property type="molecule type" value="Genomic_RNA"/>
</dbReference>
<dbReference type="EMBL" id="MW672640">
    <property type="protein sequence ID" value="QSE99730.1"/>
    <property type="molecule type" value="Genomic_RNA"/>
</dbReference>
<dbReference type="EMBL" id="MW672641">
    <property type="protein sequence ID" value="QSE99742.1"/>
    <property type="molecule type" value="Genomic_RNA"/>
</dbReference>
<dbReference type="EMBL" id="MW672642">
    <property type="protein sequence ID" value="QSE99754.1"/>
    <property type="molecule type" value="Genomic_RNA"/>
</dbReference>
<dbReference type="EMBL" id="MW672643">
    <property type="protein sequence ID" value="QSE99766.1"/>
    <property type="molecule type" value="Genomic_RNA"/>
</dbReference>
<dbReference type="EMBL" id="MW672644">
    <property type="protein sequence ID" value="QSE99778.1"/>
    <property type="molecule type" value="Genomic_RNA"/>
</dbReference>
<dbReference type="EMBL" id="MW672645">
    <property type="protein sequence ID" value="QSE99790.1"/>
    <property type="molecule type" value="Genomic_RNA"/>
</dbReference>
<dbReference type="EMBL" id="MW672646">
    <property type="protein sequence ID" value="QSE99802.1"/>
    <property type="molecule type" value="Genomic_RNA"/>
</dbReference>
<dbReference type="EMBL" id="MW672647">
    <property type="protein sequence ID" value="QSE99814.1"/>
    <property type="molecule type" value="Genomic_RNA"/>
</dbReference>
<dbReference type="EMBL" id="MW672648">
    <property type="protein sequence ID" value="QSE99826.1"/>
    <property type="molecule type" value="Genomic_RNA"/>
</dbReference>
<dbReference type="EMBL" id="MW672649">
    <property type="protein sequence ID" value="QSE99838.1"/>
    <property type="molecule type" value="Genomic_RNA"/>
</dbReference>
<dbReference type="EMBL" id="MW672650">
    <property type="protein sequence ID" value="QSE99850.1"/>
    <property type="molecule type" value="Genomic_RNA"/>
</dbReference>
<dbReference type="EMBL" id="MW672651">
    <property type="protein sequence ID" value="QSE99862.1"/>
    <property type="molecule type" value="Genomic_RNA"/>
</dbReference>
<dbReference type="EMBL" id="MW672652">
    <property type="protein sequence ID" value="QSE99874.1"/>
    <property type="molecule type" value="Genomic_RNA"/>
</dbReference>
<dbReference type="EMBL" id="MW672653">
    <property type="protein sequence ID" value="QSE99886.1"/>
    <property type="molecule type" value="Genomic_RNA"/>
</dbReference>
<dbReference type="EMBL" id="MW672654">
    <property type="protein sequence ID" value="QSE99898.1"/>
    <property type="molecule type" value="Genomic_RNA"/>
</dbReference>
<dbReference type="EMBL" id="MW672655">
    <property type="protein sequence ID" value="QSE99910.1"/>
    <property type="molecule type" value="Genomic_RNA"/>
</dbReference>
<dbReference type="EMBL" id="MW672656">
    <property type="protein sequence ID" value="QSE99922.1"/>
    <property type="molecule type" value="Genomic_RNA"/>
</dbReference>
<dbReference type="EMBL" id="MW672657">
    <property type="protein sequence ID" value="QSE99934.1"/>
    <property type="molecule type" value="Genomic_RNA"/>
</dbReference>
<dbReference type="EMBL" id="MW672658">
    <property type="protein sequence ID" value="QSE99946.1"/>
    <property type="molecule type" value="Genomic_RNA"/>
</dbReference>
<dbReference type="EMBL" id="MW672659">
    <property type="protein sequence ID" value="QSE99958.1"/>
    <property type="molecule type" value="Genomic_RNA"/>
</dbReference>
<dbReference type="EMBL" id="MW672660">
    <property type="protein sequence ID" value="QSE99970.1"/>
    <property type="molecule type" value="Genomic_RNA"/>
</dbReference>
<dbReference type="EMBL" id="MW672661">
    <property type="protein sequence ID" value="QSE99982.1"/>
    <property type="molecule type" value="Genomic_RNA"/>
</dbReference>
<dbReference type="EMBL" id="MW672662">
    <property type="protein sequence ID" value="QSE99994.1"/>
    <property type="molecule type" value="Genomic_RNA"/>
</dbReference>
<dbReference type="EMBL" id="MW672663">
    <property type="protein sequence ID" value="QSF00007.1"/>
    <property type="molecule type" value="Genomic_RNA"/>
</dbReference>
<dbReference type="EMBL" id="MW672664">
    <property type="protein sequence ID" value="QSF00019.1"/>
    <property type="molecule type" value="Genomic_RNA"/>
</dbReference>
<dbReference type="EMBL" id="MW672665">
    <property type="protein sequence ID" value="QSF00031.1"/>
    <property type="molecule type" value="Genomic_RNA"/>
</dbReference>
<dbReference type="EMBL" id="MW672666">
    <property type="protein sequence ID" value="QSF00043.1"/>
    <property type="molecule type" value="Genomic_RNA"/>
</dbReference>
<dbReference type="EMBL" id="MW672667">
    <property type="protein sequence ID" value="QSF00055.1"/>
    <property type="molecule type" value="Genomic_RNA"/>
</dbReference>
<dbReference type="EMBL" id="MW672668">
    <property type="protein sequence ID" value="QSF00067.1"/>
    <property type="molecule type" value="Genomic_RNA"/>
</dbReference>
<dbReference type="EMBL" id="MW672669">
    <property type="protein sequence ID" value="QSF00079.1"/>
    <property type="molecule type" value="Genomic_RNA"/>
</dbReference>
<dbReference type="EMBL" id="MW674808">
    <property type="protein sequence ID" value="QSF12581.1"/>
    <property type="molecule type" value="Genomic_RNA"/>
</dbReference>
<dbReference type="EMBL" id="MW674809">
    <property type="protein sequence ID" value="QSF12593.1"/>
    <property type="molecule type" value="Genomic_RNA"/>
</dbReference>
<dbReference type="EMBL" id="MW674810">
    <property type="protein sequence ID" value="QSF12605.1"/>
    <property type="molecule type" value="Genomic_RNA"/>
</dbReference>
<dbReference type="EMBL" id="MW674811">
    <property type="protein sequence ID" value="QSF12617.1"/>
    <property type="molecule type" value="Genomic_RNA"/>
</dbReference>
<dbReference type="EMBL" id="MW674812">
    <property type="protein sequence ID" value="QSF12629.1"/>
    <property type="molecule type" value="Genomic_RNA"/>
</dbReference>
<dbReference type="EMBL" id="MW674813">
    <property type="protein sequence ID" value="QSF12641.1"/>
    <property type="molecule type" value="Genomic_RNA"/>
</dbReference>
<dbReference type="EMBL" id="MW674814">
    <property type="protein sequence ID" value="QSF12653.1"/>
    <property type="molecule type" value="Genomic_RNA"/>
</dbReference>
<dbReference type="EMBL" id="MW674815">
    <property type="protein sequence ID" value="QSF12665.1"/>
    <property type="molecule type" value="Genomic_RNA"/>
</dbReference>
<dbReference type="EMBL" id="MW674816">
    <property type="protein sequence ID" value="QSF12677.1"/>
    <property type="molecule type" value="Genomic_RNA"/>
</dbReference>
<dbReference type="EMBL" id="MW674817">
    <property type="protein sequence ID" value="QSF12689.1"/>
    <property type="molecule type" value="Genomic_RNA"/>
</dbReference>
<dbReference type="EMBL" id="MW674818">
    <property type="protein sequence ID" value="QSF12701.1"/>
    <property type="molecule type" value="Genomic_RNA"/>
</dbReference>
<dbReference type="EMBL" id="MW674819">
    <property type="protein sequence ID" value="QSF12713.1"/>
    <property type="molecule type" value="Genomic_RNA"/>
</dbReference>
<dbReference type="EMBL" id="MW674820">
    <property type="protein sequence ID" value="QSF12725.1"/>
    <property type="molecule type" value="Genomic_RNA"/>
</dbReference>
<dbReference type="EMBL" id="MW674821">
    <property type="protein sequence ID" value="QSF12737.1"/>
    <property type="molecule type" value="Genomic_RNA"/>
</dbReference>
<dbReference type="EMBL" id="MW674822">
    <property type="protein sequence ID" value="QSF12749.1"/>
    <property type="molecule type" value="Genomic_RNA"/>
</dbReference>
<dbReference type="EMBL" id="MW674823">
    <property type="protein sequence ID" value="QSF12761.1"/>
    <property type="molecule type" value="Genomic_RNA"/>
</dbReference>
<dbReference type="EMBL" id="MW674824">
    <property type="protein sequence ID" value="QSF12773.1"/>
    <property type="molecule type" value="Genomic_RNA"/>
</dbReference>
<dbReference type="EMBL" id="MW674825">
    <property type="protein sequence ID" value="QSF12785.1"/>
    <property type="molecule type" value="Genomic_RNA"/>
</dbReference>
<dbReference type="EMBL" id="MW674826">
    <property type="protein sequence ID" value="QSF12797.1"/>
    <property type="molecule type" value="Genomic_RNA"/>
</dbReference>
<dbReference type="EMBL" id="MW674827">
    <property type="protein sequence ID" value="QSF12809.1"/>
    <property type="molecule type" value="Genomic_RNA"/>
</dbReference>
<dbReference type="EMBL" id="MW674828">
    <property type="protein sequence ID" value="QSF12821.1"/>
    <property type="molecule type" value="Genomic_RNA"/>
</dbReference>
<dbReference type="EMBL" id="MW674829">
    <property type="protein sequence ID" value="QSF12833.1"/>
    <property type="molecule type" value="Genomic_RNA"/>
</dbReference>
<dbReference type="EMBL" id="MW674830">
    <property type="protein sequence ID" value="QSF12845.1"/>
    <property type="molecule type" value="Genomic_RNA"/>
</dbReference>
<dbReference type="EMBL" id="MW674831">
    <property type="protein sequence ID" value="QSF12857.1"/>
    <property type="molecule type" value="Genomic_RNA"/>
</dbReference>
<dbReference type="EMBL" id="MW674832">
    <property type="protein sequence ID" value="QSF12869.1"/>
    <property type="molecule type" value="Genomic_RNA"/>
</dbReference>
<dbReference type="EMBL" id="MW674833">
    <property type="protein sequence ID" value="QSF12881.1"/>
    <property type="molecule type" value="Genomic_RNA"/>
</dbReference>
<dbReference type="EMBL" id="MW674834">
    <property type="protein sequence ID" value="QSF12893.1"/>
    <property type="molecule type" value="Genomic_RNA"/>
</dbReference>
<dbReference type="EMBL" id="MW674835">
    <property type="protein sequence ID" value="QSF12905.1"/>
    <property type="molecule type" value="Genomic_RNA"/>
</dbReference>
<dbReference type="EMBL" id="MW674836">
    <property type="protein sequence ID" value="QSF12917.1"/>
    <property type="molecule type" value="Genomic_RNA"/>
</dbReference>
<dbReference type="EMBL" id="MW674839">
    <property type="protein sequence ID" value="QSF12953.1"/>
    <property type="molecule type" value="Genomic_RNA"/>
</dbReference>
<dbReference type="EMBL" id="MW674840">
    <property type="protein sequence ID" value="QSF12965.1"/>
    <property type="molecule type" value="Genomic_RNA"/>
</dbReference>
<dbReference type="EMBL" id="MW674841">
    <property type="protein sequence ID" value="QSF12977.1"/>
    <property type="molecule type" value="Genomic_RNA"/>
</dbReference>
<dbReference type="EMBL" id="MW674842">
    <property type="protein sequence ID" value="QSF12989.1"/>
    <property type="molecule type" value="Genomic_RNA"/>
</dbReference>
<dbReference type="EMBL" id="MW674843">
    <property type="protein sequence ID" value="QSF13001.1"/>
    <property type="molecule type" value="Genomic_RNA"/>
</dbReference>
<dbReference type="EMBL" id="MW674844">
    <property type="protein sequence ID" value="QSF13013.1"/>
    <property type="molecule type" value="Genomic_RNA"/>
</dbReference>
<dbReference type="EMBL" id="MW674845">
    <property type="protein sequence ID" value="QSF13025.1"/>
    <property type="molecule type" value="Genomic_RNA"/>
</dbReference>
<dbReference type="EMBL" id="MW674846">
    <property type="protein sequence ID" value="QSF13037.1"/>
    <property type="molecule type" value="Genomic_RNA"/>
</dbReference>
<dbReference type="EMBL" id="MW674847">
    <property type="protein sequence ID" value="QSF13049.1"/>
    <property type="molecule type" value="Genomic_RNA"/>
</dbReference>
<dbReference type="EMBL" id="MW674848">
    <property type="protein sequence ID" value="QSF13061.1"/>
    <property type="molecule type" value="Genomic_RNA"/>
</dbReference>
<dbReference type="EMBL" id="MW674849">
    <property type="protein sequence ID" value="QSF13073.1"/>
    <property type="molecule type" value="Genomic_RNA"/>
</dbReference>
<dbReference type="EMBL" id="MW674850">
    <property type="protein sequence ID" value="QSF13085.1"/>
    <property type="molecule type" value="Genomic_RNA"/>
</dbReference>
<dbReference type="EMBL" id="MW674851">
    <property type="protein sequence ID" value="QSF13097.1"/>
    <property type="molecule type" value="Genomic_RNA"/>
</dbReference>
<dbReference type="EMBL" id="MW674852">
    <property type="protein sequence ID" value="QSF13109.1"/>
    <property type="molecule type" value="Genomic_RNA"/>
</dbReference>
<dbReference type="EMBL" id="MW674853">
    <property type="protein sequence ID" value="QSF13121.1"/>
    <property type="molecule type" value="Genomic_RNA"/>
</dbReference>
<dbReference type="EMBL" id="MW674854">
    <property type="protein sequence ID" value="QSF13133.1"/>
    <property type="molecule type" value="Genomic_RNA"/>
</dbReference>
<dbReference type="EMBL" id="MW674855">
    <property type="protein sequence ID" value="QSF13145.1"/>
    <property type="molecule type" value="Genomic_RNA"/>
</dbReference>
<dbReference type="EMBL" id="MW674856">
    <property type="protein sequence ID" value="QSF13157.1"/>
    <property type="molecule type" value="Genomic_RNA"/>
</dbReference>
<dbReference type="EMBL" id="MW674857">
    <property type="protein sequence ID" value="QSF13169.1"/>
    <property type="molecule type" value="Genomic_RNA"/>
</dbReference>
<dbReference type="EMBL" id="MW674858">
    <property type="protein sequence ID" value="QSF13181.1"/>
    <property type="molecule type" value="Genomic_RNA"/>
</dbReference>
<dbReference type="EMBL" id="MW674859">
    <property type="protein sequence ID" value="QSF13193.1"/>
    <property type="molecule type" value="Genomic_RNA"/>
</dbReference>
<dbReference type="EMBL" id="MW674860">
    <property type="protein sequence ID" value="QSF13205.1"/>
    <property type="molecule type" value="Genomic_RNA"/>
</dbReference>
<dbReference type="EMBL" id="MW674861">
    <property type="protein sequence ID" value="QSF13217.1"/>
    <property type="molecule type" value="Genomic_RNA"/>
</dbReference>
<dbReference type="EMBL" id="MW674862">
    <property type="protein sequence ID" value="QSF13229.1"/>
    <property type="molecule type" value="Genomic_RNA"/>
</dbReference>
<dbReference type="EMBL" id="MW674863">
    <property type="protein sequence ID" value="QSF13241.1"/>
    <property type="molecule type" value="Genomic_RNA"/>
</dbReference>
<dbReference type="EMBL" id="MW674864">
    <property type="protein sequence ID" value="QSF13253.1"/>
    <property type="molecule type" value="Genomic_RNA"/>
</dbReference>
<dbReference type="EMBL" id="MW674865">
    <property type="protein sequence ID" value="QSF13265.1"/>
    <property type="molecule type" value="Genomic_RNA"/>
</dbReference>
<dbReference type="EMBL" id="MW674866">
    <property type="protein sequence ID" value="QSF13277.1"/>
    <property type="molecule type" value="Genomic_RNA"/>
</dbReference>
<dbReference type="EMBL" id="MW674867">
    <property type="protein sequence ID" value="QSF13289.1"/>
    <property type="molecule type" value="Genomic_RNA"/>
</dbReference>
<dbReference type="EMBL" id="MW674868">
    <property type="protein sequence ID" value="QSF13301.1"/>
    <property type="molecule type" value="Genomic_RNA"/>
</dbReference>
<dbReference type="EMBL" id="MW674869">
    <property type="protein sequence ID" value="QSF13313.1"/>
    <property type="molecule type" value="Genomic_RNA"/>
</dbReference>
<dbReference type="EMBL" id="MW674870">
    <property type="protein sequence ID" value="QSF13325.1"/>
    <property type="molecule type" value="Genomic_RNA"/>
</dbReference>
<dbReference type="EMBL" id="MW674871">
    <property type="protein sequence ID" value="QSF13337.1"/>
    <property type="molecule type" value="Genomic_RNA"/>
</dbReference>
<dbReference type="EMBL" id="MW674872">
    <property type="protein sequence ID" value="QSF13349.1"/>
    <property type="molecule type" value="Genomic_RNA"/>
</dbReference>
<dbReference type="EMBL" id="MW674873">
    <property type="protein sequence ID" value="QSF13361.1"/>
    <property type="molecule type" value="Genomic_RNA"/>
</dbReference>
<dbReference type="EMBL" id="MW674874">
    <property type="protein sequence ID" value="QSF13373.1"/>
    <property type="molecule type" value="Genomic_RNA"/>
</dbReference>
<dbReference type="EMBL" id="MW691151">
    <property type="protein sequence ID" value="QSJ03242.1"/>
    <property type="molecule type" value="Genomic_RNA"/>
</dbReference>
<dbReference type="EMBL" id="MW691152">
    <property type="protein sequence ID" value="QSJ03251.1"/>
    <property type="molecule type" value="Genomic_RNA"/>
</dbReference>
<dbReference type="EMBL" id="MW691153">
    <property type="protein sequence ID" value="QSJ03260.1"/>
    <property type="molecule type" value="Genomic_RNA"/>
</dbReference>
<dbReference type="EMBL" id="MW718188">
    <property type="protein sequence ID" value="QSS76502.1"/>
    <property type="molecule type" value="Genomic_RNA"/>
</dbReference>
<dbReference type="EMBL" id="MW718189">
    <property type="protein sequence ID" value="QSS76514.1"/>
    <property type="molecule type" value="Genomic_RNA"/>
</dbReference>
<dbReference type="EMBL" id="MW718190">
    <property type="protein sequence ID" value="QSS76526.1"/>
    <property type="molecule type" value="Genomic_RNA"/>
</dbReference>
<dbReference type="EMBL" id="MW718191">
    <property type="protein sequence ID" value="QSS76538.1"/>
    <property type="molecule type" value="Genomic_RNA"/>
</dbReference>
<dbReference type="EMBL" id="MW718192">
    <property type="protein sequence ID" value="QSS76550.1"/>
    <property type="molecule type" value="Genomic_RNA"/>
</dbReference>
<dbReference type="EMBL" id="MW718193">
    <property type="protein sequence ID" value="QSS76562.1"/>
    <property type="molecule type" value="Genomic_RNA"/>
</dbReference>
<dbReference type="EMBL" id="MW718194">
    <property type="protein sequence ID" value="QSS76574.1"/>
    <property type="molecule type" value="Genomic_RNA"/>
</dbReference>
<dbReference type="EMBL" id="MW811435">
    <property type="protein sequence ID" value="QTG40592.1"/>
    <property type="molecule type" value="Genomic_RNA"/>
</dbReference>
<dbReference type="EMBL" id="MW822592">
    <property type="protein sequence ID" value="QTH25060.1"/>
    <property type="molecule type" value="Genomic_RNA"/>
</dbReference>
<dbReference type="EMBL" id="MW822593">
    <property type="protein sequence ID" value="QTH25072.1"/>
    <property type="molecule type" value="Genomic_RNA"/>
</dbReference>
<dbReference type="EMBL" id="MW822594">
    <property type="protein sequence ID" value="QTH25084.1"/>
    <property type="molecule type" value="Genomic_RNA"/>
</dbReference>
<dbReference type="EMBL" id="MW861359">
    <property type="protein sequence ID" value="QTM63497.1"/>
    <property type="molecule type" value="Genomic_RNA"/>
</dbReference>
<dbReference type="EMBL" id="MW861360">
    <property type="protein sequence ID" value="QTM63509.1"/>
    <property type="molecule type" value="Genomic_RNA"/>
</dbReference>
<dbReference type="EMBL" id="MW861361">
    <property type="protein sequence ID" value="QTM63521.1"/>
    <property type="molecule type" value="Genomic_RNA"/>
</dbReference>
<dbReference type="EMBL" id="MW861362">
    <property type="protein sequence ID" value="QTM63533.1"/>
    <property type="molecule type" value="Genomic_RNA"/>
</dbReference>
<dbReference type="EMBL" id="MW861363">
    <property type="protein sequence ID" value="QTM63545.1"/>
    <property type="molecule type" value="Genomic_RNA"/>
</dbReference>
<dbReference type="EMBL" id="MW861364">
    <property type="protein sequence ID" value="QTM63557.1"/>
    <property type="molecule type" value="Genomic_RNA"/>
</dbReference>
<dbReference type="EMBL" id="MW861365">
    <property type="protein sequence ID" value="QTM63569.1"/>
    <property type="molecule type" value="Genomic_RNA"/>
</dbReference>
<dbReference type="EMBL" id="MW861366">
    <property type="protein sequence ID" value="QTM63581.1"/>
    <property type="molecule type" value="Genomic_RNA"/>
</dbReference>
<dbReference type="EMBL" id="MW861367">
    <property type="protein sequence ID" value="QTM63593.1"/>
    <property type="molecule type" value="Genomic_RNA"/>
</dbReference>
<dbReference type="EMBL" id="MW861368">
    <property type="protein sequence ID" value="QTM63605.1"/>
    <property type="molecule type" value="Genomic_RNA"/>
</dbReference>
<dbReference type="EMBL" id="MW861369">
    <property type="protein sequence ID" value="QTM63617.1"/>
    <property type="molecule type" value="Genomic_RNA"/>
</dbReference>
<dbReference type="EMBL" id="MW861370">
    <property type="protein sequence ID" value="QTM63628.1"/>
    <property type="molecule type" value="Genomic_RNA"/>
</dbReference>
<dbReference type="EMBL" id="MW861371">
    <property type="protein sequence ID" value="QTM63639.1"/>
    <property type="molecule type" value="Genomic_RNA"/>
</dbReference>
<dbReference type="EMBL" id="MW861372">
    <property type="protein sequence ID" value="QTM63651.1"/>
    <property type="molecule type" value="Genomic_RNA"/>
</dbReference>
<dbReference type="EMBL" id="MW861373">
    <property type="protein sequence ID" value="QTM63663.1"/>
    <property type="molecule type" value="Genomic_RNA"/>
</dbReference>
<dbReference type="EMBL" id="MW861374">
    <property type="protein sequence ID" value="QTM63675.1"/>
    <property type="molecule type" value="Genomic_RNA"/>
</dbReference>
<dbReference type="EMBL" id="MW861375">
    <property type="protein sequence ID" value="QTM63687.1"/>
    <property type="molecule type" value="Genomic_RNA"/>
</dbReference>
<dbReference type="EMBL" id="MW861376">
    <property type="protein sequence ID" value="QTM63699.1"/>
    <property type="molecule type" value="Genomic_RNA"/>
</dbReference>
<dbReference type="EMBL" id="MW861377">
    <property type="protein sequence ID" value="QTM63711.1"/>
    <property type="molecule type" value="Genomic_RNA"/>
</dbReference>
<dbReference type="EMBL" id="MW861378">
    <property type="protein sequence ID" value="QTM63723.1"/>
    <property type="molecule type" value="Genomic_RNA"/>
</dbReference>
<dbReference type="EMBL" id="MW861379">
    <property type="protein sequence ID" value="QTM63735.1"/>
    <property type="molecule type" value="Genomic_RNA"/>
</dbReference>
<dbReference type="EMBL" id="MW861385">
    <property type="protein sequence ID" value="QTM63807.1"/>
    <property type="molecule type" value="Genomic_RNA"/>
</dbReference>
<dbReference type="EMBL" id="MW861386">
    <property type="protein sequence ID" value="QTM63819.1"/>
    <property type="molecule type" value="Genomic_RNA"/>
</dbReference>
<dbReference type="EMBL" id="MW861387">
    <property type="protein sequence ID" value="QTM63831.1"/>
    <property type="molecule type" value="Genomic_RNA"/>
</dbReference>
<dbReference type="EMBL" id="MW861388">
    <property type="protein sequence ID" value="QTM63843.1"/>
    <property type="molecule type" value="Genomic_RNA"/>
</dbReference>
<dbReference type="EMBL" id="MW861389">
    <property type="protein sequence ID" value="QTM63855.1"/>
    <property type="molecule type" value="Genomic_RNA"/>
</dbReference>
<dbReference type="EMBL" id="MW861390">
    <property type="protein sequence ID" value="QTM63867.1"/>
    <property type="molecule type" value="Genomic_RNA"/>
</dbReference>
<dbReference type="EMBL" id="MW861391">
    <property type="protein sequence ID" value="QTM63879.1"/>
    <property type="molecule type" value="Genomic_RNA"/>
</dbReference>
<dbReference type="EMBL" id="MW885875">
    <property type="protein sequence ID" value="QTP71246.1"/>
    <property type="molecule type" value="Genomic_RNA"/>
</dbReference>
<dbReference type="EMBL" id="MW885876">
    <property type="protein sequence ID" value="QTP71258.1"/>
    <property type="molecule type" value="Genomic_RNA"/>
</dbReference>
<dbReference type="EMBL" id="MW885877">
    <property type="protein sequence ID" value="QTP71270.1"/>
    <property type="molecule type" value="Genomic_RNA"/>
</dbReference>
<dbReference type="EMBL" id="MW885878">
    <property type="protein sequence ID" value="QTP71282.1"/>
    <property type="molecule type" value="Genomic_RNA"/>
</dbReference>
<dbReference type="EMBL" id="MW885879">
    <property type="protein sequence ID" value="QTP71294.1"/>
    <property type="molecule type" value="Genomic_RNA"/>
</dbReference>
<dbReference type="EMBL" id="MW885880">
    <property type="protein sequence ID" value="QTP71306.1"/>
    <property type="molecule type" value="Genomic_RNA"/>
</dbReference>
<dbReference type="EMBL" id="MW885881">
    <property type="protein sequence ID" value="QTP71318.1"/>
    <property type="molecule type" value="Genomic_RNA"/>
</dbReference>
<dbReference type="EMBL" id="MW885882">
    <property type="protein sequence ID" value="QTP71330.1"/>
    <property type="molecule type" value="Genomic_RNA"/>
</dbReference>
<dbReference type="EMBL" id="MW885883">
    <property type="protein sequence ID" value="QTP71342.1"/>
    <property type="molecule type" value="Genomic_RNA"/>
</dbReference>
<dbReference type="EMBL" id="MW972466">
    <property type="protein sequence ID" value="QTZ30412.1"/>
    <property type="molecule type" value="Genomic_RNA"/>
</dbReference>
<dbReference type="EMBL" id="MW972467">
    <property type="protein sequence ID" value="QTZ30424.1"/>
    <property type="molecule type" value="Genomic_RNA"/>
</dbReference>
<dbReference type="EMBL" id="MW972468">
    <property type="protein sequence ID" value="QTZ30436.1"/>
    <property type="molecule type" value="Genomic_RNA"/>
</dbReference>
<dbReference type="EMBL" id="MW972469">
    <property type="protein sequence ID" value="QTZ30448.1"/>
    <property type="molecule type" value="Genomic_RNA"/>
</dbReference>
<dbReference type="EMBL" id="MW972470">
    <property type="protein sequence ID" value="QTZ30460.1"/>
    <property type="molecule type" value="Genomic_RNA"/>
</dbReference>
<dbReference type="EMBL" id="MW972471">
    <property type="protein sequence ID" value="QTZ30472.1"/>
    <property type="molecule type" value="Genomic_RNA"/>
</dbReference>
<dbReference type="EMBL" id="MW972472">
    <property type="protein sequence ID" value="QTZ30484.1"/>
    <property type="molecule type" value="Genomic_RNA"/>
</dbReference>
<dbReference type="EMBL" id="MW972473">
    <property type="protein sequence ID" value="QTZ30496.1"/>
    <property type="molecule type" value="Genomic_RNA"/>
</dbReference>
<dbReference type="EMBL" id="MW972474">
    <property type="protein sequence ID" value="QTZ30508.1"/>
    <property type="molecule type" value="Genomic_RNA"/>
</dbReference>
<dbReference type="EMBL" id="MW972475">
    <property type="protein sequence ID" value="QTZ30519.1"/>
    <property type="molecule type" value="Genomic_RNA"/>
</dbReference>
<dbReference type="EMBL" id="MW972476">
    <property type="protein sequence ID" value="QTZ30530.1"/>
    <property type="molecule type" value="Genomic_RNA"/>
</dbReference>
<dbReference type="EMBL" id="MW972477">
    <property type="protein sequence ID" value="QTZ30541.1"/>
    <property type="molecule type" value="Genomic_RNA"/>
</dbReference>
<dbReference type="EMBL" id="MW972478">
    <property type="protein sequence ID" value="QTZ30553.1"/>
    <property type="molecule type" value="Genomic_RNA"/>
</dbReference>
<dbReference type="EMBL" id="MW972479">
    <property type="protein sequence ID" value="QTZ30565.1"/>
    <property type="molecule type" value="Genomic_RNA"/>
</dbReference>
<dbReference type="EMBL" id="MW972480">
    <property type="protein sequence ID" value="QTZ30577.1"/>
    <property type="molecule type" value="Genomic_RNA"/>
</dbReference>
<dbReference type="EMBL" id="MW972481">
    <property type="protein sequence ID" value="QTZ30589.1"/>
    <property type="molecule type" value="Genomic_RNA"/>
</dbReference>
<dbReference type="EMBL" id="MW972482">
    <property type="protein sequence ID" value="QTZ30601.1"/>
    <property type="molecule type" value="Genomic_RNA"/>
</dbReference>
<dbReference type="EMBL" id="MW972483">
    <property type="protein sequence ID" value="QTZ30613.1"/>
    <property type="molecule type" value="Genomic_RNA"/>
</dbReference>
<dbReference type="EMBL" id="MW972484">
    <property type="protein sequence ID" value="QTZ30625.1"/>
    <property type="molecule type" value="Genomic_RNA"/>
</dbReference>
<dbReference type="EMBL" id="MW972485">
    <property type="protein sequence ID" value="QTZ30637.1"/>
    <property type="molecule type" value="Genomic_RNA"/>
</dbReference>
<dbReference type="EMBL" id="MW972486">
    <property type="protein sequence ID" value="QTZ30649.1"/>
    <property type="molecule type" value="Genomic_RNA"/>
</dbReference>
<dbReference type="EMBL" id="MW972489">
    <property type="protein sequence ID" value="QTZ30682.1"/>
    <property type="molecule type" value="Genomic_RNA"/>
</dbReference>
<dbReference type="EMBL" id="MW972490">
    <property type="protein sequence ID" value="QTZ30694.1"/>
    <property type="molecule type" value="Genomic_RNA"/>
</dbReference>
<dbReference type="EMBL" id="MW972491">
    <property type="protein sequence ID" value="QTZ30706.1"/>
    <property type="molecule type" value="Genomic_RNA"/>
</dbReference>
<dbReference type="EMBL" id="MW972492">
    <property type="protein sequence ID" value="QTZ30718.1"/>
    <property type="molecule type" value="Genomic_RNA"/>
</dbReference>
<dbReference type="EMBL" id="MW972493">
    <property type="protein sequence ID" value="QTZ30730.1"/>
    <property type="molecule type" value="Genomic_RNA"/>
</dbReference>
<dbReference type="EMBL" id="MW972494">
    <property type="protein sequence ID" value="QTZ30742.1"/>
    <property type="molecule type" value="Genomic_RNA"/>
</dbReference>
<dbReference type="EMBL" id="MW972495">
    <property type="protein sequence ID" value="QTZ30754.1"/>
    <property type="molecule type" value="Genomic_RNA"/>
</dbReference>
<dbReference type="EMBL" id="MW972496">
    <property type="protein sequence ID" value="QTZ30766.1"/>
    <property type="molecule type" value="Genomic_RNA"/>
</dbReference>
<dbReference type="EMBL" id="MW972497">
    <property type="protein sequence ID" value="QTZ30778.1"/>
    <property type="molecule type" value="Genomic_RNA"/>
</dbReference>
<dbReference type="EMBL" id="MW972498">
    <property type="protein sequence ID" value="QTZ30790.1"/>
    <property type="molecule type" value="Genomic_RNA"/>
</dbReference>
<dbReference type="EMBL" id="MW972499">
    <property type="protein sequence ID" value="QTZ30802.1"/>
    <property type="molecule type" value="Genomic_RNA"/>
</dbReference>
<dbReference type="EMBL" id="MW972500">
    <property type="protein sequence ID" value="QTZ30814.1"/>
    <property type="molecule type" value="Genomic_RNA"/>
</dbReference>
<dbReference type="EMBL" id="MW972501">
    <property type="protein sequence ID" value="QTZ30826.1"/>
    <property type="molecule type" value="Genomic_RNA"/>
</dbReference>
<dbReference type="EMBL" id="MW972503">
    <property type="protein sequence ID" value="QTZ30850.1"/>
    <property type="molecule type" value="Genomic_RNA"/>
</dbReference>
<dbReference type="EMBL" id="MW972504">
    <property type="protein sequence ID" value="QTZ30862.1"/>
    <property type="molecule type" value="Genomic_RNA"/>
</dbReference>
<dbReference type="EMBL" id="MW972505">
    <property type="protein sequence ID" value="QTZ30874.1"/>
    <property type="molecule type" value="Genomic_RNA"/>
</dbReference>
<dbReference type="EMBL" id="MW972506">
    <property type="protein sequence ID" value="QTZ30886.1"/>
    <property type="molecule type" value="Genomic_RNA"/>
</dbReference>
<dbReference type="EMBL" id="MW972507">
    <property type="protein sequence ID" value="QTZ30898.1"/>
    <property type="molecule type" value="Genomic_RNA"/>
</dbReference>
<dbReference type="EMBL" id="MW972508">
    <property type="protein sequence ID" value="QTZ30910.1"/>
    <property type="molecule type" value="Genomic_RNA"/>
</dbReference>
<dbReference type="EMBL" id="MW972509">
    <property type="protein sequence ID" value="QTZ30922.1"/>
    <property type="molecule type" value="Genomic_RNA"/>
</dbReference>
<dbReference type="EMBL" id="MW972510">
    <property type="protein sequence ID" value="QTZ30934.1"/>
    <property type="molecule type" value="Genomic_RNA"/>
</dbReference>
<dbReference type="EMBL" id="MW972511">
    <property type="protein sequence ID" value="QTZ30946.1"/>
    <property type="molecule type" value="Genomic_RNA"/>
</dbReference>
<dbReference type="EMBL" id="MW972512">
    <property type="protein sequence ID" value="QTZ30958.1"/>
    <property type="molecule type" value="Genomic_RNA"/>
</dbReference>
<dbReference type="EMBL" id="MW972513">
    <property type="protein sequence ID" value="QTZ30970.1"/>
    <property type="molecule type" value="Genomic_RNA"/>
</dbReference>
<dbReference type="EMBL" id="MW972514">
    <property type="protein sequence ID" value="QTZ30982.1"/>
    <property type="molecule type" value="Genomic_RNA"/>
</dbReference>
<dbReference type="EMBL" id="MW972515">
    <property type="protein sequence ID" value="QTZ30994.1"/>
    <property type="molecule type" value="Genomic_RNA"/>
</dbReference>
<dbReference type="EMBL" id="MW972516">
    <property type="protein sequence ID" value="QTZ31006.1"/>
    <property type="molecule type" value="Genomic_RNA"/>
</dbReference>
<dbReference type="EMBL" id="MW972517">
    <property type="protein sequence ID" value="QTZ31018.1"/>
    <property type="molecule type" value="Genomic_RNA"/>
</dbReference>
<dbReference type="EMBL" id="MW972518">
    <property type="protein sequence ID" value="QTZ31030.1"/>
    <property type="molecule type" value="Genomic_RNA"/>
</dbReference>
<dbReference type="EMBL" id="MW972519">
    <property type="protein sequence ID" value="QTZ31042.1"/>
    <property type="molecule type" value="Genomic_RNA"/>
</dbReference>
<dbReference type="EMBL" id="MW972520">
    <property type="protein sequence ID" value="QTZ31054.1"/>
    <property type="molecule type" value="Genomic_RNA"/>
</dbReference>
<dbReference type="EMBL" id="MW972521">
    <property type="protein sequence ID" value="QTZ31066.1"/>
    <property type="molecule type" value="Genomic_RNA"/>
</dbReference>
<dbReference type="EMBL" id="MW972522">
    <property type="protein sequence ID" value="QTZ31078.1"/>
    <property type="molecule type" value="Genomic_RNA"/>
</dbReference>
<dbReference type="EMBL" id="MW972523">
    <property type="protein sequence ID" value="QTZ31090.1"/>
    <property type="molecule type" value="Genomic_RNA"/>
</dbReference>
<dbReference type="EMBL" id="MW972524">
    <property type="protein sequence ID" value="QTZ31102.1"/>
    <property type="molecule type" value="Genomic_RNA"/>
</dbReference>
<dbReference type="EMBL" id="MW972525">
    <property type="protein sequence ID" value="QTZ31114.1"/>
    <property type="molecule type" value="Genomic_RNA"/>
</dbReference>
<dbReference type="EMBL" id="MW972526">
    <property type="protein sequence ID" value="QTZ31126.1"/>
    <property type="molecule type" value="Genomic_RNA"/>
</dbReference>
<dbReference type="EMBL" id="MW972527">
    <property type="protein sequence ID" value="QTZ31138.1"/>
    <property type="molecule type" value="Genomic_RNA"/>
</dbReference>
<dbReference type="EMBL" id="MW972528">
    <property type="protein sequence ID" value="QTZ31150.1"/>
    <property type="molecule type" value="Genomic_RNA"/>
</dbReference>
<dbReference type="EMBL" id="MW972529">
    <property type="protein sequence ID" value="QTZ31162.1"/>
    <property type="molecule type" value="Genomic_RNA"/>
</dbReference>
<dbReference type="EMBL" id="MW972530">
    <property type="protein sequence ID" value="QTZ31174.1"/>
    <property type="molecule type" value="Genomic_RNA"/>
</dbReference>
<dbReference type="EMBL" id="MW972532">
    <property type="protein sequence ID" value="QTZ31198.1"/>
    <property type="molecule type" value="Genomic_RNA"/>
</dbReference>
<dbReference type="EMBL" id="MW972533">
    <property type="protein sequence ID" value="QTZ31210.1"/>
    <property type="molecule type" value="Genomic_RNA"/>
</dbReference>
<dbReference type="EMBL" id="MW972534">
    <property type="protein sequence ID" value="QTZ31222.1"/>
    <property type="molecule type" value="Genomic_RNA"/>
</dbReference>
<dbReference type="EMBL" id="MW972535">
    <property type="protein sequence ID" value="QTZ31234.1"/>
    <property type="molecule type" value="Genomic_RNA"/>
</dbReference>
<dbReference type="EMBL" id="MW972536">
    <property type="protein sequence ID" value="QTZ31246.1"/>
    <property type="molecule type" value="Genomic_RNA"/>
</dbReference>
<dbReference type="EMBL" id="MW972537">
    <property type="protein sequence ID" value="QTZ31258.1"/>
    <property type="molecule type" value="Genomic_RNA"/>
</dbReference>
<dbReference type="EMBL" id="MW972538">
    <property type="protein sequence ID" value="QTZ31269.1"/>
    <property type="molecule type" value="Genomic_RNA"/>
</dbReference>
<dbReference type="EMBL" id="MW972539">
    <property type="protein sequence ID" value="QTZ31280.1"/>
    <property type="molecule type" value="Genomic_RNA"/>
</dbReference>
<dbReference type="EMBL" id="MW972540">
    <property type="protein sequence ID" value="QTZ31291.1"/>
    <property type="molecule type" value="Genomic_RNA"/>
</dbReference>
<dbReference type="EMBL" id="MW972541">
    <property type="protein sequence ID" value="QTZ31303.1"/>
    <property type="molecule type" value="Genomic_RNA"/>
</dbReference>
<dbReference type="EMBL" id="MW972543">
    <property type="protein sequence ID" value="QTZ31327.1"/>
    <property type="molecule type" value="Genomic_RNA"/>
</dbReference>
<dbReference type="EMBL" id="MW972544">
    <property type="protein sequence ID" value="QTZ31339.1"/>
    <property type="molecule type" value="Genomic_RNA"/>
</dbReference>
<dbReference type="EMBL" id="MW972545">
    <property type="protein sequence ID" value="QTZ31351.1"/>
    <property type="molecule type" value="Genomic_RNA"/>
</dbReference>
<dbReference type="EMBL" id="MW972546">
    <property type="protein sequence ID" value="QTZ31363.1"/>
    <property type="molecule type" value="Genomic_RNA"/>
</dbReference>
<dbReference type="EMBL" id="MW972550">
    <property type="protein sequence ID" value="QTZ31408.1"/>
    <property type="molecule type" value="Genomic_RNA"/>
</dbReference>
<dbReference type="EMBL" id="MW972551">
    <property type="protein sequence ID" value="QTZ31420.1"/>
    <property type="molecule type" value="Genomic_RNA"/>
</dbReference>
<dbReference type="EMBL" id="MW972552">
    <property type="protein sequence ID" value="QTZ31432.1"/>
    <property type="molecule type" value="Genomic_RNA"/>
</dbReference>
<dbReference type="EMBL" id="MW972553">
    <property type="protein sequence ID" value="QTZ31443.1"/>
    <property type="molecule type" value="Genomic_RNA"/>
</dbReference>
<dbReference type="EMBL" id="MW972554">
    <property type="protein sequence ID" value="QTZ31455.1"/>
    <property type="molecule type" value="Genomic_RNA"/>
</dbReference>
<dbReference type="EMBL" id="MW972555">
    <property type="protein sequence ID" value="QTZ31467.1"/>
    <property type="molecule type" value="Genomic_RNA"/>
</dbReference>
<dbReference type="EMBL" id="MW972556">
    <property type="protein sequence ID" value="QTZ31479.1"/>
    <property type="molecule type" value="Genomic_RNA"/>
</dbReference>
<dbReference type="EMBL" id="MW972557">
    <property type="protein sequence ID" value="QTZ31491.1"/>
    <property type="molecule type" value="Genomic_RNA"/>
</dbReference>
<dbReference type="EMBL" id="MW972558">
    <property type="protein sequence ID" value="QTZ31503.1"/>
    <property type="molecule type" value="Genomic_RNA"/>
</dbReference>
<dbReference type="EMBL" id="MW972559">
    <property type="protein sequence ID" value="QTZ31515.1"/>
    <property type="molecule type" value="Genomic_RNA"/>
</dbReference>
<dbReference type="EMBL" id="MW972560">
    <property type="protein sequence ID" value="QTZ31527.1"/>
    <property type="molecule type" value="Genomic_RNA"/>
</dbReference>
<dbReference type="EMBL" id="MW972561">
    <property type="protein sequence ID" value="QTZ31539.1"/>
    <property type="molecule type" value="Genomic_RNA"/>
</dbReference>
<dbReference type="EMBL" id="MW972562">
    <property type="protein sequence ID" value="QTZ31551.1"/>
    <property type="molecule type" value="Genomic_RNA"/>
</dbReference>
<dbReference type="EMBL" id="MW972563">
    <property type="protein sequence ID" value="QTZ31563.1"/>
    <property type="molecule type" value="Genomic_RNA"/>
</dbReference>
<dbReference type="EMBL" id="MW972564">
    <property type="protein sequence ID" value="QTZ31575.1"/>
    <property type="molecule type" value="Genomic_RNA"/>
</dbReference>
<dbReference type="EMBL" id="MW972565">
    <property type="protein sequence ID" value="QTZ31587.1"/>
    <property type="molecule type" value="Genomic_RNA"/>
</dbReference>
<dbReference type="EMBL" id="MW972566">
    <property type="protein sequence ID" value="QTZ31599.1"/>
    <property type="molecule type" value="Genomic_RNA"/>
</dbReference>
<dbReference type="EMBL" id="MW972568">
    <property type="protein sequence ID" value="QTZ31623.1"/>
    <property type="molecule type" value="Genomic_RNA"/>
</dbReference>
<dbReference type="EMBL" id="MW972569">
    <property type="protein sequence ID" value="QTZ31635.1"/>
    <property type="molecule type" value="Genomic_RNA"/>
</dbReference>
<dbReference type="EMBL" id="MW972570">
    <property type="protein sequence ID" value="QTZ31647.1"/>
    <property type="molecule type" value="Genomic_RNA"/>
</dbReference>
<dbReference type="EMBL" id="MW972571">
    <property type="protein sequence ID" value="QTZ31657.1"/>
    <property type="molecule type" value="Genomic_RNA"/>
</dbReference>
<dbReference type="EMBL" id="MW972572">
    <property type="protein sequence ID" value="QTZ31669.1"/>
    <property type="molecule type" value="Genomic_RNA"/>
</dbReference>
<dbReference type="EMBL" id="MW972573">
    <property type="protein sequence ID" value="QTZ31681.1"/>
    <property type="molecule type" value="Genomic_RNA"/>
</dbReference>
<dbReference type="EMBL" id="MW972574">
    <property type="protein sequence ID" value="QTZ31693.1"/>
    <property type="molecule type" value="Genomic_RNA"/>
</dbReference>
<dbReference type="EMBL" id="MW972575">
    <property type="protein sequence ID" value="QTZ31704.1"/>
    <property type="molecule type" value="Genomic_RNA"/>
</dbReference>
<dbReference type="EMBL" id="MW972576">
    <property type="protein sequence ID" value="QTZ31715.1"/>
    <property type="molecule type" value="Genomic_RNA"/>
</dbReference>
<dbReference type="EMBL" id="MW972577">
    <property type="protein sequence ID" value="QTZ31727.1"/>
    <property type="molecule type" value="Genomic_RNA"/>
</dbReference>
<dbReference type="EMBL" id="MW972578">
    <property type="protein sequence ID" value="QTZ31739.1"/>
    <property type="molecule type" value="Genomic_RNA"/>
</dbReference>
<dbReference type="EMBL" id="MW972579">
    <property type="protein sequence ID" value="QTZ31751.1"/>
    <property type="molecule type" value="Genomic_RNA"/>
</dbReference>
<dbReference type="EMBL" id="MW972580">
    <property type="protein sequence ID" value="QTZ31763.1"/>
    <property type="molecule type" value="Genomic_RNA"/>
</dbReference>
<dbReference type="EMBL" id="MW972581">
    <property type="protein sequence ID" value="QTZ31775.1"/>
    <property type="molecule type" value="Genomic_RNA"/>
</dbReference>
<dbReference type="EMBL" id="MW972582">
    <property type="protein sequence ID" value="QTZ31787.1"/>
    <property type="molecule type" value="Genomic_RNA"/>
</dbReference>
<dbReference type="EMBL" id="MW972583">
    <property type="protein sequence ID" value="QTZ31799.1"/>
    <property type="molecule type" value="Genomic_RNA"/>
</dbReference>
<dbReference type="EMBL" id="MW972584">
    <property type="protein sequence ID" value="QTZ31811.1"/>
    <property type="molecule type" value="Genomic_RNA"/>
</dbReference>
<dbReference type="EMBL" id="MW972585">
    <property type="protein sequence ID" value="QTZ31823.1"/>
    <property type="molecule type" value="Genomic_RNA"/>
</dbReference>
<dbReference type="EMBL" id="MW972586">
    <property type="protein sequence ID" value="QTZ31835.1"/>
    <property type="molecule type" value="Genomic_RNA"/>
</dbReference>
<dbReference type="EMBL" id="MW972587">
    <property type="protein sequence ID" value="QTZ31847.1"/>
    <property type="molecule type" value="Genomic_RNA"/>
</dbReference>
<dbReference type="EMBL" id="MW972588">
    <property type="protein sequence ID" value="QTZ31859.1"/>
    <property type="molecule type" value="Genomic_RNA"/>
</dbReference>
<dbReference type="EMBL" id="MW972589">
    <property type="protein sequence ID" value="QTZ31871.1"/>
    <property type="molecule type" value="Genomic_RNA"/>
</dbReference>
<dbReference type="EMBL" id="MW972590">
    <property type="protein sequence ID" value="QTZ31883.1"/>
    <property type="molecule type" value="Genomic_RNA"/>
</dbReference>
<dbReference type="EMBL" id="MW972591">
    <property type="protein sequence ID" value="QTZ31895.1"/>
    <property type="molecule type" value="Genomic_RNA"/>
</dbReference>
<dbReference type="EMBL" id="MW972592">
    <property type="protein sequence ID" value="QTZ31907.1"/>
    <property type="molecule type" value="Genomic_RNA"/>
</dbReference>
<dbReference type="EMBL" id="MW972593">
    <property type="protein sequence ID" value="QTZ31919.1"/>
    <property type="molecule type" value="Genomic_RNA"/>
</dbReference>
<dbReference type="EMBL" id="MW972594">
    <property type="protein sequence ID" value="QTZ31931.1"/>
    <property type="molecule type" value="Genomic_RNA"/>
</dbReference>
<dbReference type="EMBL" id="MW972595">
    <property type="protein sequence ID" value="QTZ31943.1"/>
    <property type="molecule type" value="Genomic_RNA"/>
</dbReference>
<dbReference type="EMBL" id="MW972596">
    <property type="protein sequence ID" value="QTZ31955.1"/>
    <property type="molecule type" value="Genomic_RNA"/>
</dbReference>
<dbReference type="EMBL" id="MW972597">
    <property type="protein sequence ID" value="QTZ31967.1"/>
    <property type="molecule type" value="Genomic_RNA"/>
</dbReference>
<dbReference type="EMBL" id="MW972598">
    <property type="protein sequence ID" value="QTZ31979.1"/>
    <property type="molecule type" value="Genomic_RNA"/>
</dbReference>
<dbReference type="EMBL" id="MW972599">
    <property type="protein sequence ID" value="QTZ31991.1"/>
    <property type="molecule type" value="Genomic_RNA"/>
</dbReference>
<dbReference type="EMBL" id="MW972600">
    <property type="protein sequence ID" value="QTZ32003.1"/>
    <property type="molecule type" value="Genomic_RNA"/>
</dbReference>
<dbReference type="EMBL" id="MW972601">
    <property type="protein sequence ID" value="QTZ32015.1"/>
    <property type="molecule type" value="Genomic_RNA"/>
</dbReference>
<dbReference type="EMBL" id="MW972603">
    <property type="protein sequence ID" value="QTZ32039.1"/>
    <property type="molecule type" value="Genomic_RNA"/>
</dbReference>
<dbReference type="EMBL" id="MW972604">
    <property type="protein sequence ID" value="QTZ32049.1"/>
    <property type="molecule type" value="Genomic_RNA"/>
</dbReference>
<dbReference type="EMBL" id="MW972605">
    <property type="protein sequence ID" value="QTZ32061.1"/>
    <property type="molecule type" value="Genomic_RNA"/>
</dbReference>
<dbReference type="EMBL" id="MW972606">
    <property type="protein sequence ID" value="QTZ32072.1"/>
    <property type="molecule type" value="Genomic_RNA"/>
</dbReference>
<dbReference type="EMBL" id="MW972607">
    <property type="protein sequence ID" value="QTZ32083.1"/>
    <property type="molecule type" value="Genomic_RNA"/>
</dbReference>
<dbReference type="EMBL" id="MW972608">
    <property type="protein sequence ID" value="QTZ32093.1"/>
    <property type="molecule type" value="Genomic_RNA"/>
</dbReference>
<dbReference type="EMBL" id="MW972609">
    <property type="protein sequence ID" value="QTZ32105.1"/>
    <property type="molecule type" value="Genomic_RNA"/>
</dbReference>
<dbReference type="EMBL" id="MW972610">
    <property type="protein sequence ID" value="QTZ32117.1"/>
    <property type="molecule type" value="Genomic_RNA"/>
</dbReference>
<dbReference type="EMBL" id="MW972611">
    <property type="protein sequence ID" value="QTZ32129.1"/>
    <property type="molecule type" value="Genomic_RNA"/>
</dbReference>
<dbReference type="EMBL" id="MW972612">
    <property type="protein sequence ID" value="QTZ32141.1"/>
    <property type="molecule type" value="Genomic_RNA"/>
</dbReference>
<dbReference type="EMBL" id="MW972613">
    <property type="protein sequence ID" value="QTZ32153.1"/>
    <property type="molecule type" value="Genomic_RNA"/>
</dbReference>
<dbReference type="EMBL" id="MW972614">
    <property type="protein sequence ID" value="QTZ32165.1"/>
    <property type="molecule type" value="Genomic_RNA"/>
</dbReference>
<dbReference type="EMBL" id="MW972615">
    <property type="protein sequence ID" value="QTZ32177.1"/>
    <property type="molecule type" value="Genomic_RNA"/>
</dbReference>
<dbReference type="EMBL" id="MW972616">
    <property type="protein sequence ID" value="QTZ32189.1"/>
    <property type="molecule type" value="Genomic_RNA"/>
</dbReference>
<dbReference type="EMBL" id="MW972617">
    <property type="protein sequence ID" value="QTZ32201.1"/>
    <property type="molecule type" value="Genomic_RNA"/>
</dbReference>
<dbReference type="EMBL" id="MW972618">
    <property type="protein sequence ID" value="QTZ32213.1"/>
    <property type="molecule type" value="Genomic_RNA"/>
</dbReference>
<dbReference type="EMBL" id="MW972619">
    <property type="protein sequence ID" value="QTZ32225.1"/>
    <property type="molecule type" value="Genomic_RNA"/>
</dbReference>
<dbReference type="EMBL" id="MW972620">
    <property type="protein sequence ID" value="QTZ32237.1"/>
    <property type="molecule type" value="Genomic_RNA"/>
</dbReference>
<dbReference type="EMBL" id="MW972621">
    <property type="protein sequence ID" value="QTZ32249.1"/>
    <property type="molecule type" value="Genomic_RNA"/>
</dbReference>
<dbReference type="EMBL" id="MW972622">
    <property type="protein sequence ID" value="QTZ32261.1"/>
    <property type="molecule type" value="Genomic_RNA"/>
</dbReference>
<dbReference type="EMBL" id="MW972623">
    <property type="protein sequence ID" value="QTZ32273.1"/>
    <property type="molecule type" value="Genomic_RNA"/>
</dbReference>
<dbReference type="EMBL" id="MW972624">
    <property type="protein sequence ID" value="QTZ32285.1"/>
    <property type="molecule type" value="Genomic_RNA"/>
</dbReference>
<dbReference type="EMBL" id="MW972625">
    <property type="protein sequence ID" value="QTZ32297.1"/>
    <property type="molecule type" value="Genomic_RNA"/>
</dbReference>
<dbReference type="EMBL" id="MW972626">
    <property type="protein sequence ID" value="QTZ32309.1"/>
    <property type="molecule type" value="Genomic_RNA"/>
</dbReference>
<dbReference type="EMBL" id="MW972627">
    <property type="protein sequence ID" value="QTZ32321.1"/>
    <property type="molecule type" value="Genomic_RNA"/>
</dbReference>
<dbReference type="EMBL" id="MW972628">
    <property type="protein sequence ID" value="QTZ32333.1"/>
    <property type="molecule type" value="Genomic_RNA"/>
</dbReference>
<dbReference type="EMBL" id="MW972629">
    <property type="protein sequence ID" value="QTZ32345.1"/>
    <property type="molecule type" value="Genomic_RNA"/>
</dbReference>
<dbReference type="EMBL" id="MW972630">
    <property type="protein sequence ID" value="QTZ32357.1"/>
    <property type="molecule type" value="Genomic_RNA"/>
</dbReference>
<dbReference type="EMBL" id="MW972631">
    <property type="protein sequence ID" value="QTZ32369.1"/>
    <property type="molecule type" value="Genomic_RNA"/>
</dbReference>
<dbReference type="EMBL" id="MW972632">
    <property type="protein sequence ID" value="QTZ32381.1"/>
    <property type="molecule type" value="Genomic_RNA"/>
</dbReference>
<dbReference type="EMBL" id="MW972633">
    <property type="protein sequence ID" value="QTZ32393.1"/>
    <property type="molecule type" value="Genomic_RNA"/>
</dbReference>
<dbReference type="EMBL" id="MW972634">
    <property type="protein sequence ID" value="QTZ32405.1"/>
    <property type="molecule type" value="Genomic_RNA"/>
</dbReference>
<dbReference type="EMBL" id="MW972635">
    <property type="protein sequence ID" value="QTZ32417.1"/>
    <property type="molecule type" value="Genomic_RNA"/>
</dbReference>
<dbReference type="EMBL" id="MW972636">
    <property type="protein sequence ID" value="QTZ32429.1"/>
    <property type="molecule type" value="Genomic_RNA"/>
</dbReference>
<dbReference type="EMBL" id="MW972637">
    <property type="protein sequence ID" value="QTZ32441.1"/>
    <property type="molecule type" value="Genomic_RNA"/>
</dbReference>
<dbReference type="EMBL" id="MW972638">
    <property type="protein sequence ID" value="QTZ32453.1"/>
    <property type="molecule type" value="Genomic_RNA"/>
</dbReference>
<dbReference type="EMBL" id="MW972639">
    <property type="protein sequence ID" value="QTZ32465.1"/>
    <property type="molecule type" value="Genomic_RNA"/>
</dbReference>
<dbReference type="EMBL" id="MW972640">
    <property type="protein sequence ID" value="QTZ32477.1"/>
    <property type="molecule type" value="Genomic_RNA"/>
</dbReference>
<dbReference type="EMBL" id="MW972641">
    <property type="protein sequence ID" value="QTZ32489.1"/>
    <property type="molecule type" value="Genomic_RNA"/>
</dbReference>
<dbReference type="EMBL" id="MW972642">
    <property type="protein sequence ID" value="QTZ32501.1"/>
    <property type="molecule type" value="Genomic_RNA"/>
</dbReference>
<dbReference type="EMBL" id="MW972643">
    <property type="protein sequence ID" value="QTZ32513.1"/>
    <property type="molecule type" value="Genomic_RNA"/>
</dbReference>
<dbReference type="EMBL" id="MW972644">
    <property type="protein sequence ID" value="QTZ32525.1"/>
    <property type="molecule type" value="Genomic_RNA"/>
</dbReference>
<dbReference type="EMBL" id="MW972645">
    <property type="protein sequence ID" value="QTZ32537.1"/>
    <property type="molecule type" value="Genomic_RNA"/>
</dbReference>
<dbReference type="EMBL" id="MW972646">
    <property type="protein sequence ID" value="QTZ32549.1"/>
    <property type="molecule type" value="Genomic_RNA"/>
</dbReference>
<dbReference type="EMBL" id="MW972647">
    <property type="protein sequence ID" value="QTZ32561.1"/>
    <property type="molecule type" value="Genomic_RNA"/>
</dbReference>
<dbReference type="EMBL" id="MW972648">
    <property type="protein sequence ID" value="QTZ32573.1"/>
    <property type="molecule type" value="Genomic_RNA"/>
</dbReference>
<dbReference type="EMBL" id="MW972649">
    <property type="protein sequence ID" value="QTZ32585.1"/>
    <property type="molecule type" value="Genomic_RNA"/>
</dbReference>
<dbReference type="EMBL" id="MW972650">
    <property type="protein sequence ID" value="QTZ32597.1"/>
    <property type="molecule type" value="Genomic_RNA"/>
</dbReference>
<dbReference type="EMBL" id="MW972651">
    <property type="protein sequence ID" value="QTZ32609.1"/>
    <property type="molecule type" value="Genomic_RNA"/>
</dbReference>
<dbReference type="EMBL" id="MW972652">
    <property type="protein sequence ID" value="QTZ32621.1"/>
    <property type="molecule type" value="Genomic_RNA"/>
</dbReference>
<dbReference type="EMBL" id="MW972653">
    <property type="protein sequence ID" value="QTZ32633.1"/>
    <property type="molecule type" value="Genomic_RNA"/>
</dbReference>
<dbReference type="EMBL" id="MW972654">
    <property type="protein sequence ID" value="QTZ32645.1"/>
    <property type="molecule type" value="Genomic_RNA"/>
</dbReference>
<dbReference type="EMBL" id="MW972655">
    <property type="protein sequence ID" value="QTZ32657.1"/>
    <property type="molecule type" value="Genomic_RNA"/>
</dbReference>
<dbReference type="EMBL" id="MW972656">
    <property type="protein sequence ID" value="QTZ32669.1"/>
    <property type="molecule type" value="Genomic_RNA"/>
</dbReference>
<dbReference type="EMBL" id="MW972657">
    <property type="protein sequence ID" value="QTZ32681.1"/>
    <property type="molecule type" value="Genomic_RNA"/>
</dbReference>
<dbReference type="EMBL" id="MW972658">
    <property type="protein sequence ID" value="QTZ32693.1"/>
    <property type="molecule type" value="Genomic_RNA"/>
</dbReference>
<dbReference type="EMBL" id="MW972659">
    <property type="protein sequence ID" value="QTZ32705.1"/>
    <property type="molecule type" value="Genomic_RNA"/>
</dbReference>
<dbReference type="EMBL" id="MW972660">
    <property type="protein sequence ID" value="QTZ32717.1"/>
    <property type="molecule type" value="Genomic_RNA"/>
</dbReference>
<dbReference type="EMBL" id="MW972661">
    <property type="protein sequence ID" value="QTZ32729.1"/>
    <property type="molecule type" value="Genomic_RNA"/>
</dbReference>
<dbReference type="EMBL" id="MW972662">
    <property type="protein sequence ID" value="QTZ32741.1"/>
    <property type="molecule type" value="Genomic_RNA"/>
</dbReference>
<dbReference type="EMBL" id="MW972663">
    <property type="protein sequence ID" value="QTZ32753.1"/>
    <property type="molecule type" value="Genomic_RNA"/>
</dbReference>
<dbReference type="EMBL" id="MW972664">
    <property type="protein sequence ID" value="QTZ32765.1"/>
    <property type="molecule type" value="Genomic_RNA"/>
</dbReference>
<dbReference type="EMBL" id="MW972665">
    <property type="protein sequence ID" value="QTZ32777.1"/>
    <property type="molecule type" value="Genomic_RNA"/>
</dbReference>
<dbReference type="EMBL" id="MW972666">
    <property type="protein sequence ID" value="QTZ32789.1"/>
    <property type="molecule type" value="Genomic_RNA"/>
</dbReference>
<dbReference type="EMBL" id="MW972667">
    <property type="protein sequence ID" value="QTZ32801.1"/>
    <property type="molecule type" value="Genomic_RNA"/>
</dbReference>
<dbReference type="EMBL" id="MW972668">
    <property type="protein sequence ID" value="QTZ32813.1"/>
    <property type="molecule type" value="Genomic_RNA"/>
</dbReference>
<dbReference type="EMBL" id="MW972669">
    <property type="protein sequence ID" value="QTZ32825.1"/>
    <property type="molecule type" value="Genomic_RNA"/>
</dbReference>
<dbReference type="EMBL" id="MW972670">
    <property type="protein sequence ID" value="QTZ32837.1"/>
    <property type="molecule type" value="Genomic_RNA"/>
</dbReference>
<dbReference type="EMBL" id="MW972671">
    <property type="protein sequence ID" value="QTZ32849.1"/>
    <property type="molecule type" value="Genomic_RNA"/>
</dbReference>
<dbReference type="EMBL" id="MW972672">
    <property type="protein sequence ID" value="QTZ32861.1"/>
    <property type="molecule type" value="Genomic_RNA"/>
</dbReference>
<dbReference type="EMBL" id="MW972673">
    <property type="protein sequence ID" value="QTZ32873.1"/>
    <property type="molecule type" value="Genomic_RNA"/>
</dbReference>
<dbReference type="EMBL" id="MW972674">
    <property type="protein sequence ID" value="QTZ32885.1"/>
    <property type="molecule type" value="Genomic_RNA"/>
</dbReference>
<dbReference type="EMBL" id="MW972675">
    <property type="protein sequence ID" value="QTZ32897.1"/>
    <property type="molecule type" value="Genomic_RNA"/>
</dbReference>
<dbReference type="EMBL" id="MW972676">
    <property type="protein sequence ID" value="QTZ32909.1"/>
    <property type="molecule type" value="Genomic_RNA"/>
</dbReference>
<dbReference type="EMBL" id="MW972677">
    <property type="protein sequence ID" value="QTZ32921.1"/>
    <property type="molecule type" value="Genomic_RNA"/>
</dbReference>
<dbReference type="EMBL" id="MW972678">
    <property type="protein sequence ID" value="QTZ32933.1"/>
    <property type="molecule type" value="Genomic_RNA"/>
</dbReference>
<dbReference type="EMBL" id="MW972679">
    <property type="protein sequence ID" value="QTZ32945.1"/>
    <property type="molecule type" value="Genomic_RNA"/>
</dbReference>
<dbReference type="EMBL" id="MW972680">
    <property type="protein sequence ID" value="QTZ32957.1"/>
    <property type="molecule type" value="Genomic_RNA"/>
</dbReference>
<dbReference type="EMBL" id="MW972681">
    <property type="protein sequence ID" value="QTZ32969.1"/>
    <property type="molecule type" value="Genomic_RNA"/>
</dbReference>
<dbReference type="EMBL" id="MW972682">
    <property type="protein sequence ID" value="QTZ32981.1"/>
    <property type="molecule type" value="Genomic_RNA"/>
</dbReference>
<dbReference type="EMBL" id="MW972683">
    <property type="protein sequence ID" value="QTZ32993.1"/>
    <property type="molecule type" value="Genomic_RNA"/>
</dbReference>
<dbReference type="EMBL" id="MW972684">
    <property type="protein sequence ID" value="QTZ33005.1"/>
    <property type="molecule type" value="Genomic_RNA"/>
</dbReference>
<dbReference type="EMBL" id="MW972685">
    <property type="protein sequence ID" value="QTZ33017.1"/>
    <property type="molecule type" value="Genomic_RNA"/>
</dbReference>
<dbReference type="EMBL" id="MW972686">
    <property type="protein sequence ID" value="QTZ33029.1"/>
    <property type="molecule type" value="Genomic_RNA"/>
</dbReference>
<dbReference type="EMBL" id="MW972687">
    <property type="protein sequence ID" value="QTZ33041.1"/>
    <property type="molecule type" value="Genomic_RNA"/>
</dbReference>
<dbReference type="EMBL" id="MW972688">
    <property type="protein sequence ID" value="QTZ33053.1"/>
    <property type="molecule type" value="Genomic_RNA"/>
</dbReference>
<dbReference type="EMBL" id="MW972689">
    <property type="protein sequence ID" value="QTZ33065.1"/>
    <property type="molecule type" value="Genomic_RNA"/>
</dbReference>
<dbReference type="EMBL" id="MW972690">
    <property type="protein sequence ID" value="QTZ33077.1"/>
    <property type="molecule type" value="Genomic_RNA"/>
</dbReference>
<dbReference type="EMBL" id="MW972691">
    <property type="protein sequence ID" value="QTZ33089.1"/>
    <property type="molecule type" value="Genomic_RNA"/>
</dbReference>
<dbReference type="EMBL" id="MW972692">
    <property type="protein sequence ID" value="QTZ33101.1"/>
    <property type="molecule type" value="Genomic_RNA"/>
</dbReference>
<dbReference type="EMBL" id="MW972693">
    <property type="protein sequence ID" value="QTZ33113.1"/>
    <property type="molecule type" value="Genomic_RNA"/>
</dbReference>
<dbReference type="EMBL" id="MW972694">
    <property type="protein sequence ID" value="QTZ33125.1"/>
    <property type="molecule type" value="Genomic_RNA"/>
</dbReference>
<dbReference type="EMBL" id="MW972695">
    <property type="protein sequence ID" value="QTZ33137.1"/>
    <property type="molecule type" value="Genomic_RNA"/>
</dbReference>
<dbReference type="EMBL" id="MW972696">
    <property type="protein sequence ID" value="QTZ33149.1"/>
    <property type="molecule type" value="Genomic_RNA"/>
</dbReference>
<dbReference type="EMBL" id="MW972697">
    <property type="protein sequence ID" value="QTZ33161.1"/>
    <property type="molecule type" value="Genomic_RNA"/>
</dbReference>
<dbReference type="EMBL" id="MW972698">
    <property type="protein sequence ID" value="QTZ33173.1"/>
    <property type="molecule type" value="Genomic_RNA"/>
</dbReference>
<dbReference type="EMBL" id="MW972699">
    <property type="protein sequence ID" value="QTZ33185.1"/>
    <property type="molecule type" value="Genomic_RNA"/>
</dbReference>
<dbReference type="EMBL" id="MW972700">
    <property type="protein sequence ID" value="QTZ33197.1"/>
    <property type="molecule type" value="Genomic_RNA"/>
</dbReference>
<dbReference type="EMBL" id="MW972701">
    <property type="protein sequence ID" value="QTZ33209.1"/>
    <property type="molecule type" value="Genomic_RNA"/>
</dbReference>
<dbReference type="EMBL" id="MW972702">
    <property type="protein sequence ID" value="QTZ33221.1"/>
    <property type="molecule type" value="Genomic_RNA"/>
</dbReference>
<dbReference type="EMBL" id="MW972703">
    <property type="protein sequence ID" value="QTZ33233.1"/>
    <property type="molecule type" value="Genomic_RNA"/>
</dbReference>
<dbReference type="EMBL" id="MW972704">
    <property type="protein sequence ID" value="QTZ33245.1"/>
    <property type="molecule type" value="Genomic_RNA"/>
</dbReference>
<dbReference type="EMBL" id="MW972705">
    <property type="protein sequence ID" value="QTZ33257.1"/>
    <property type="molecule type" value="Genomic_RNA"/>
</dbReference>
<dbReference type="EMBL" id="MW972706">
    <property type="protein sequence ID" value="QTZ33269.1"/>
    <property type="molecule type" value="Genomic_RNA"/>
</dbReference>
<dbReference type="EMBL" id="MW972707">
    <property type="protein sequence ID" value="QTZ33281.1"/>
    <property type="molecule type" value="Genomic_RNA"/>
</dbReference>
<dbReference type="EMBL" id="MW972708">
    <property type="protein sequence ID" value="QTZ33293.1"/>
    <property type="molecule type" value="Genomic_RNA"/>
</dbReference>
<dbReference type="EMBL" id="MW972710">
    <property type="protein sequence ID" value="QTZ33317.1"/>
    <property type="molecule type" value="Genomic_RNA"/>
</dbReference>
<dbReference type="EMBL" id="MW972711">
    <property type="protein sequence ID" value="QTZ33329.1"/>
    <property type="molecule type" value="Genomic_RNA"/>
</dbReference>
<dbReference type="EMBL" id="MW972712">
    <property type="protein sequence ID" value="QTZ33341.1"/>
    <property type="molecule type" value="Genomic_RNA"/>
</dbReference>
<dbReference type="EMBL" id="MW972713">
    <property type="protein sequence ID" value="QTZ33353.1"/>
    <property type="molecule type" value="Genomic_RNA"/>
</dbReference>
<dbReference type="EMBL" id="MW972714">
    <property type="protein sequence ID" value="QTZ33365.1"/>
    <property type="molecule type" value="Genomic_RNA"/>
</dbReference>
<dbReference type="EMBL" id="MW972715">
    <property type="protein sequence ID" value="QTZ33377.1"/>
    <property type="molecule type" value="Genomic_RNA"/>
</dbReference>
<dbReference type="EMBL" id="MW972716">
    <property type="protein sequence ID" value="QTZ33389.1"/>
    <property type="molecule type" value="Genomic_RNA"/>
</dbReference>
<dbReference type="EMBL" id="MW972717">
    <property type="protein sequence ID" value="QTZ33401.1"/>
    <property type="molecule type" value="Genomic_RNA"/>
</dbReference>
<dbReference type="EMBL" id="MW972718">
    <property type="protein sequence ID" value="QTZ33413.1"/>
    <property type="molecule type" value="Genomic_RNA"/>
</dbReference>
<dbReference type="EMBL" id="MW972719">
    <property type="protein sequence ID" value="QTZ33425.1"/>
    <property type="molecule type" value="Genomic_RNA"/>
</dbReference>
<dbReference type="EMBL" id="MW972720">
    <property type="protein sequence ID" value="QTZ33437.1"/>
    <property type="molecule type" value="Genomic_RNA"/>
</dbReference>
<dbReference type="EMBL" id="MW972721">
    <property type="protein sequence ID" value="QTZ33449.1"/>
    <property type="molecule type" value="Genomic_RNA"/>
</dbReference>
<dbReference type="EMBL" id="MW972722">
    <property type="protein sequence ID" value="QTZ33461.1"/>
    <property type="molecule type" value="Genomic_RNA"/>
</dbReference>
<dbReference type="EMBL" id="MW972723">
    <property type="protein sequence ID" value="QTZ33473.1"/>
    <property type="molecule type" value="Genomic_RNA"/>
</dbReference>
<dbReference type="EMBL" id="MW972724">
    <property type="protein sequence ID" value="QTZ33485.1"/>
    <property type="molecule type" value="Genomic_RNA"/>
</dbReference>
<dbReference type="EMBL" id="MW972725">
    <property type="protein sequence ID" value="QTZ33497.1"/>
    <property type="molecule type" value="Genomic_RNA"/>
</dbReference>
<dbReference type="EMBL" id="MW972726">
    <property type="protein sequence ID" value="QTZ33509.1"/>
    <property type="molecule type" value="Genomic_RNA"/>
</dbReference>
<dbReference type="EMBL" id="MW972728">
    <property type="protein sequence ID" value="QTZ33533.1"/>
    <property type="molecule type" value="Genomic_RNA"/>
</dbReference>
<dbReference type="EMBL" id="MW972729">
    <property type="protein sequence ID" value="QTZ33545.1"/>
    <property type="molecule type" value="Genomic_RNA"/>
</dbReference>
<dbReference type="EMBL" id="MW972730">
    <property type="protein sequence ID" value="QTZ33557.1"/>
    <property type="molecule type" value="Genomic_RNA"/>
</dbReference>
<dbReference type="EMBL" id="MW972731">
    <property type="protein sequence ID" value="QTZ33569.1"/>
    <property type="molecule type" value="Genomic_RNA"/>
</dbReference>
<dbReference type="EMBL" id="MW972732">
    <property type="protein sequence ID" value="QTZ33581.1"/>
    <property type="molecule type" value="Genomic_RNA"/>
</dbReference>
<dbReference type="EMBL" id="MW972733">
    <property type="protein sequence ID" value="QTZ33593.1"/>
    <property type="molecule type" value="Genomic_RNA"/>
</dbReference>
<dbReference type="EMBL" id="MW972735">
    <property type="protein sequence ID" value="QTZ33616.1"/>
    <property type="molecule type" value="Genomic_RNA"/>
</dbReference>
<dbReference type="EMBL" id="MW972736">
    <property type="protein sequence ID" value="QTZ33628.1"/>
    <property type="molecule type" value="Genomic_RNA"/>
</dbReference>
<dbReference type="EMBL" id="MW972737">
    <property type="protein sequence ID" value="QTZ33640.1"/>
    <property type="molecule type" value="Genomic_RNA"/>
</dbReference>
<dbReference type="EMBL" id="MW972738">
    <property type="protein sequence ID" value="QTZ33652.1"/>
    <property type="molecule type" value="Genomic_RNA"/>
</dbReference>
<dbReference type="EMBL" id="MW972739">
    <property type="protein sequence ID" value="QTZ33664.1"/>
    <property type="molecule type" value="Genomic_RNA"/>
</dbReference>
<dbReference type="EMBL" id="MW972740">
    <property type="protein sequence ID" value="QTZ33676.1"/>
    <property type="molecule type" value="Genomic_RNA"/>
</dbReference>
<dbReference type="EMBL" id="MW972741">
    <property type="protein sequence ID" value="QTZ33688.1"/>
    <property type="molecule type" value="Genomic_RNA"/>
</dbReference>
<dbReference type="EMBL" id="MW972742">
    <property type="protein sequence ID" value="QTZ33699.1"/>
    <property type="molecule type" value="Genomic_RNA"/>
</dbReference>
<dbReference type="EMBL" id="MW972743">
    <property type="protein sequence ID" value="QTZ33710.1"/>
    <property type="molecule type" value="Genomic_RNA"/>
</dbReference>
<dbReference type="EMBL" id="MW972744">
    <property type="protein sequence ID" value="QTZ33722.1"/>
    <property type="molecule type" value="Genomic_RNA"/>
</dbReference>
<dbReference type="EMBL" id="MW972745">
    <property type="protein sequence ID" value="QTZ33734.1"/>
    <property type="molecule type" value="Genomic_RNA"/>
</dbReference>
<dbReference type="EMBL" id="MW972747">
    <property type="protein sequence ID" value="QTZ33758.1"/>
    <property type="molecule type" value="Genomic_RNA"/>
</dbReference>
<dbReference type="EMBL" id="MW972748">
    <property type="protein sequence ID" value="QTZ33770.1"/>
    <property type="molecule type" value="Genomic_RNA"/>
</dbReference>
<dbReference type="EMBL" id="MW972750">
    <property type="protein sequence ID" value="QTZ33794.1"/>
    <property type="molecule type" value="Genomic_RNA"/>
</dbReference>
<dbReference type="EMBL" id="MW972752">
    <property type="protein sequence ID" value="QTZ33818.1"/>
    <property type="molecule type" value="Genomic_RNA"/>
</dbReference>
<dbReference type="EMBL" id="MW972753">
    <property type="protein sequence ID" value="QTZ33830.1"/>
    <property type="molecule type" value="Genomic_RNA"/>
</dbReference>
<dbReference type="EMBL" id="MW972754">
    <property type="protein sequence ID" value="QTZ33842.1"/>
    <property type="molecule type" value="Genomic_RNA"/>
</dbReference>
<dbReference type="EMBL" id="MW972755">
    <property type="protein sequence ID" value="QTZ33854.1"/>
    <property type="molecule type" value="Genomic_RNA"/>
</dbReference>
<dbReference type="EMBL" id="MW972757">
    <property type="protein sequence ID" value="QTZ33878.1"/>
    <property type="molecule type" value="Genomic_RNA"/>
</dbReference>
<dbReference type="EMBL" id="MW972758">
    <property type="protein sequence ID" value="QTZ33890.1"/>
    <property type="molecule type" value="Genomic_RNA"/>
</dbReference>
<dbReference type="EMBL" id="MW972759">
    <property type="protein sequence ID" value="QTZ33902.1"/>
    <property type="molecule type" value="Genomic_RNA"/>
</dbReference>
<dbReference type="EMBL" id="MW972761">
    <property type="protein sequence ID" value="QTZ33926.1"/>
    <property type="molecule type" value="Genomic_RNA"/>
</dbReference>
<dbReference type="EMBL" id="MW972762">
    <property type="protein sequence ID" value="QTZ33938.1"/>
    <property type="molecule type" value="Genomic_RNA"/>
</dbReference>
<dbReference type="EMBL" id="MW972764">
    <property type="protein sequence ID" value="QTZ33962.1"/>
    <property type="molecule type" value="Genomic_RNA"/>
</dbReference>
<dbReference type="EMBL" id="MW972769">
    <property type="protein sequence ID" value="QTZ34022.1"/>
    <property type="molecule type" value="Genomic_RNA"/>
</dbReference>
<dbReference type="EMBL" id="MW972770">
    <property type="protein sequence ID" value="QTZ34034.1"/>
    <property type="molecule type" value="Genomic_RNA"/>
</dbReference>
<dbReference type="EMBL" id="MW972771">
    <property type="protein sequence ID" value="QTZ34046.1"/>
    <property type="molecule type" value="Genomic_RNA"/>
</dbReference>
<dbReference type="EMBL" id="MW972772">
    <property type="protein sequence ID" value="QTZ34058.1"/>
    <property type="molecule type" value="Genomic_RNA"/>
</dbReference>
<dbReference type="EMBL" id="MW972773">
    <property type="protein sequence ID" value="QTZ34070.1"/>
    <property type="molecule type" value="Genomic_RNA"/>
</dbReference>
<dbReference type="EMBL" id="MW972774">
    <property type="protein sequence ID" value="QTZ34082.1"/>
    <property type="molecule type" value="Genomic_RNA"/>
</dbReference>
<dbReference type="EMBL" id="MW972775">
    <property type="protein sequence ID" value="QTZ34094.1"/>
    <property type="molecule type" value="Genomic_RNA"/>
</dbReference>
<dbReference type="EMBL" id="MW972776">
    <property type="protein sequence ID" value="QTZ34106.1"/>
    <property type="molecule type" value="Genomic_RNA"/>
</dbReference>
<dbReference type="EMBL" id="MW972777">
    <property type="protein sequence ID" value="QTZ34118.1"/>
    <property type="molecule type" value="Genomic_RNA"/>
</dbReference>
<dbReference type="EMBL" id="MW972778">
    <property type="protein sequence ID" value="QTZ34130.1"/>
    <property type="molecule type" value="Genomic_RNA"/>
</dbReference>
<dbReference type="EMBL" id="MW972779">
    <property type="protein sequence ID" value="QTZ34142.1"/>
    <property type="molecule type" value="Genomic_RNA"/>
</dbReference>
<dbReference type="EMBL" id="MW972780">
    <property type="protein sequence ID" value="QTZ34154.1"/>
    <property type="molecule type" value="Genomic_RNA"/>
</dbReference>
<dbReference type="EMBL" id="MW972781">
    <property type="protein sequence ID" value="QTZ34166.1"/>
    <property type="molecule type" value="Genomic_RNA"/>
</dbReference>
<dbReference type="EMBL" id="MW972782">
    <property type="protein sequence ID" value="QTZ34178.1"/>
    <property type="molecule type" value="Genomic_RNA"/>
</dbReference>
<dbReference type="EMBL" id="MW972783">
    <property type="protein sequence ID" value="QTZ34190.1"/>
    <property type="molecule type" value="Genomic_RNA"/>
</dbReference>
<dbReference type="EMBL" id="MW972784">
    <property type="protein sequence ID" value="QTZ34202.1"/>
    <property type="molecule type" value="Genomic_RNA"/>
</dbReference>
<dbReference type="EMBL" id="MW972785">
    <property type="protein sequence ID" value="QTZ34214.1"/>
    <property type="molecule type" value="Genomic_RNA"/>
</dbReference>
<dbReference type="EMBL" id="MW972786">
    <property type="protein sequence ID" value="QTZ34226.1"/>
    <property type="molecule type" value="Genomic_RNA"/>
</dbReference>
<dbReference type="EMBL" id="MW972787">
    <property type="protein sequence ID" value="QTZ34238.1"/>
    <property type="molecule type" value="Genomic_RNA"/>
</dbReference>
<dbReference type="EMBL" id="MW972788">
    <property type="protein sequence ID" value="QTZ34250.1"/>
    <property type="molecule type" value="Genomic_RNA"/>
</dbReference>
<dbReference type="EMBL" id="MW972789">
    <property type="protein sequence ID" value="QTZ34262.1"/>
    <property type="molecule type" value="Genomic_RNA"/>
</dbReference>
<dbReference type="EMBL" id="MW972790">
    <property type="protein sequence ID" value="QTZ34274.1"/>
    <property type="molecule type" value="Genomic_RNA"/>
</dbReference>
<dbReference type="EMBL" id="MW972791">
    <property type="protein sequence ID" value="QTZ34286.1"/>
    <property type="molecule type" value="Genomic_RNA"/>
</dbReference>
<dbReference type="EMBL" id="MW972792">
    <property type="protein sequence ID" value="QTZ34298.1"/>
    <property type="molecule type" value="Genomic_RNA"/>
</dbReference>
<dbReference type="EMBL" id="MW972793">
    <property type="protein sequence ID" value="QTZ34310.1"/>
    <property type="molecule type" value="Genomic_RNA"/>
</dbReference>
<dbReference type="EMBL" id="MW972794">
    <property type="protein sequence ID" value="QTZ34322.1"/>
    <property type="molecule type" value="Genomic_RNA"/>
</dbReference>
<dbReference type="EMBL" id="MW972795">
    <property type="protein sequence ID" value="QTZ34334.1"/>
    <property type="molecule type" value="Genomic_RNA"/>
</dbReference>
<dbReference type="EMBL" id="MW972796">
    <property type="protein sequence ID" value="QTZ34346.1"/>
    <property type="molecule type" value="Genomic_RNA"/>
</dbReference>
<dbReference type="EMBL" id="MW972797">
    <property type="protein sequence ID" value="QTZ34358.1"/>
    <property type="molecule type" value="Genomic_RNA"/>
</dbReference>
<dbReference type="EMBL" id="MW972798">
    <property type="protein sequence ID" value="QTZ34370.1"/>
    <property type="molecule type" value="Genomic_RNA"/>
</dbReference>
<dbReference type="EMBL" id="MW972799">
    <property type="protein sequence ID" value="QTZ34382.1"/>
    <property type="molecule type" value="Genomic_RNA"/>
</dbReference>
<dbReference type="EMBL" id="MW972800">
    <property type="protein sequence ID" value="QTZ34394.1"/>
    <property type="molecule type" value="Genomic_RNA"/>
</dbReference>
<dbReference type="EMBL" id="MW972801">
    <property type="protein sequence ID" value="QTZ34406.1"/>
    <property type="molecule type" value="Genomic_RNA"/>
</dbReference>
<dbReference type="EMBL" id="MW972802">
    <property type="protein sequence ID" value="QTZ34418.1"/>
    <property type="molecule type" value="Genomic_RNA"/>
</dbReference>
<dbReference type="EMBL" id="MW972803">
    <property type="protein sequence ID" value="QTZ34430.1"/>
    <property type="molecule type" value="Genomic_RNA"/>
</dbReference>
<dbReference type="EMBL" id="MW972804">
    <property type="protein sequence ID" value="QTZ34442.1"/>
    <property type="molecule type" value="Genomic_RNA"/>
</dbReference>
<dbReference type="EMBL" id="MW972805">
    <property type="protein sequence ID" value="QTZ34454.1"/>
    <property type="molecule type" value="Genomic_RNA"/>
</dbReference>
<dbReference type="EMBL" id="MW972806">
    <property type="protein sequence ID" value="QTZ34466.1"/>
    <property type="molecule type" value="Genomic_RNA"/>
</dbReference>
<dbReference type="EMBL" id="MW972807">
    <property type="protein sequence ID" value="QTZ34478.1"/>
    <property type="molecule type" value="Genomic_RNA"/>
</dbReference>
<dbReference type="EMBL" id="MW972808">
    <property type="protein sequence ID" value="QTZ34490.1"/>
    <property type="molecule type" value="Genomic_RNA"/>
</dbReference>
<dbReference type="EMBL" id="MW972809">
    <property type="protein sequence ID" value="QTZ34502.1"/>
    <property type="molecule type" value="Genomic_RNA"/>
</dbReference>
<dbReference type="EMBL" id="MW972810">
    <property type="protein sequence ID" value="QTZ34514.1"/>
    <property type="molecule type" value="Genomic_RNA"/>
</dbReference>
<dbReference type="EMBL" id="MW972811">
    <property type="protein sequence ID" value="QTZ34526.1"/>
    <property type="molecule type" value="Genomic_RNA"/>
</dbReference>
<dbReference type="EMBL" id="MW972812">
    <property type="protein sequence ID" value="QTZ34538.1"/>
    <property type="molecule type" value="Genomic_RNA"/>
</dbReference>
<dbReference type="EMBL" id="MW972813">
    <property type="protein sequence ID" value="QTZ34550.1"/>
    <property type="molecule type" value="Genomic_RNA"/>
</dbReference>
<dbReference type="EMBL" id="MW972814">
    <property type="protein sequence ID" value="QTZ34562.1"/>
    <property type="molecule type" value="Genomic_RNA"/>
</dbReference>
<dbReference type="EMBL" id="MW972815">
    <property type="protein sequence ID" value="QTZ34574.1"/>
    <property type="molecule type" value="Genomic_RNA"/>
</dbReference>
<dbReference type="EMBL" id="MW972816">
    <property type="protein sequence ID" value="QTZ34586.1"/>
    <property type="molecule type" value="Genomic_RNA"/>
</dbReference>
<dbReference type="EMBL" id="MW972817">
    <property type="protein sequence ID" value="QTZ34598.1"/>
    <property type="molecule type" value="Genomic_RNA"/>
</dbReference>
<dbReference type="EMBL" id="MW972818">
    <property type="protein sequence ID" value="QTZ34610.1"/>
    <property type="molecule type" value="Genomic_RNA"/>
</dbReference>
<dbReference type="EMBL" id="MW972819">
    <property type="protein sequence ID" value="QTZ34622.1"/>
    <property type="molecule type" value="Genomic_RNA"/>
</dbReference>
<dbReference type="EMBL" id="MW972820">
    <property type="protein sequence ID" value="QTZ34634.1"/>
    <property type="molecule type" value="Genomic_RNA"/>
</dbReference>
<dbReference type="EMBL" id="MW972821">
    <property type="protein sequence ID" value="QTZ34646.1"/>
    <property type="molecule type" value="Genomic_RNA"/>
</dbReference>
<dbReference type="EMBL" id="MW972822">
    <property type="protein sequence ID" value="QTZ34658.1"/>
    <property type="molecule type" value="Genomic_RNA"/>
</dbReference>
<dbReference type="EMBL" id="MW972823">
    <property type="protein sequence ID" value="QTZ34670.1"/>
    <property type="molecule type" value="Genomic_RNA"/>
</dbReference>
<dbReference type="EMBL" id="MW972824">
    <property type="protein sequence ID" value="QTZ34682.1"/>
    <property type="molecule type" value="Genomic_RNA"/>
</dbReference>
<dbReference type="EMBL" id="MW972825">
    <property type="protein sequence ID" value="QTZ34694.1"/>
    <property type="molecule type" value="Genomic_RNA"/>
</dbReference>
<dbReference type="EMBL" id="MW972826">
    <property type="protein sequence ID" value="QTZ34706.1"/>
    <property type="molecule type" value="Genomic_RNA"/>
</dbReference>
<dbReference type="EMBL" id="MW972827">
    <property type="protein sequence ID" value="QTZ34718.1"/>
    <property type="molecule type" value="Genomic_RNA"/>
</dbReference>
<dbReference type="EMBL" id="MW972829">
    <property type="protein sequence ID" value="QTZ34742.1"/>
    <property type="molecule type" value="Genomic_RNA"/>
</dbReference>
<dbReference type="EMBL" id="MW972830">
    <property type="protein sequence ID" value="QTZ34754.1"/>
    <property type="molecule type" value="Genomic_RNA"/>
</dbReference>
<dbReference type="EMBL" id="MW972831">
    <property type="protein sequence ID" value="QTZ34766.1"/>
    <property type="molecule type" value="Genomic_RNA"/>
</dbReference>
<dbReference type="EMBL" id="MW972832">
    <property type="protein sequence ID" value="QTZ34778.1"/>
    <property type="molecule type" value="Genomic_RNA"/>
</dbReference>
<dbReference type="EMBL" id="MW972833">
    <property type="protein sequence ID" value="QTZ34790.1"/>
    <property type="molecule type" value="Genomic_RNA"/>
</dbReference>
<dbReference type="EMBL" id="MW972834">
    <property type="protein sequence ID" value="QTZ34802.1"/>
    <property type="molecule type" value="Genomic_RNA"/>
</dbReference>
<dbReference type="EMBL" id="MW972835">
    <property type="protein sequence ID" value="QTZ34814.1"/>
    <property type="molecule type" value="Genomic_RNA"/>
</dbReference>
<dbReference type="EMBL" id="MW972836">
    <property type="protein sequence ID" value="QTZ34826.1"/>
    <property type="molecule type" value="Genomic_RNA"/>
</dbReference>
<dbReference type="EMBL" id="MW972837">
    <property type="protein sequence ID" value="QTZ34838.1"/>
    <property type="molecule type" value="Genomic_RNA"/>
</dbReference>
<dbReference type="EMBL" id="MW972838">
    <property type="protein sequence ID" value="QTZ34850.1"/>
    <property type="molecule type" value="Genomic_RNA"/>
</dbReference>
<dbReference type="EMBL" id="MW972839">
    <property type="protein sequence ID" value="QTZ34862.1"/>
    <property type="molecule type" value="Genomic_RNA"/>
</dbReference>
<dbReference type="EMBL" id="MW972840">
    <property type="protein sequence ID" value="QTZ34874.1"/>
    <property type="molecule type" value="Genomic_RNA"/>
</dbReference>
<dbReference type="EMBL" id="MW972841">
    <property type="protein sequence ID" value="QTZ34886.1"/>
    <property type="molecule type" value="Genomic_RNA"/>
</dbReference>
<dbReference type="EMBL" id="MW972842">
    <property type="protein sequence ID" value="QTZ34898.1"/>
    <property type="molecule type" value="Genomic_RNA"/>
</dbReference>
<dbReference type="EMBL" id="MW972843">
    <property type="protein sequence ID" value="QTZ34910.1"/>
    <property type="molecule type" value="Genomic_RNA"/>
</dbReference>
<dbReference type="EMBL" id="MW972844">
    <property type="protein sequence ID" value="QTZ34922.1"/>
    <property type="molecule type" value="Genomic_RNA"/>
</dbReference>
<dbReference type="EMBL" id="MW972845">
    <property type="protein sequence ID" value="QTZ34934.1"/>
    <property type="molecule type" value="Genomic_RNA"/>
</dbReference>
<dbReference type="EMBL" id="MW972846">
    <property type="protein sequence ID" value="QTZ34946.1"/>
    <property type="molecule type" value="Genomic_RNA"/>
</dbReference>
<dbReference type="EMBL" id="MW972847">
    <property type="protein sequence ID" value="QTZ34958.1"/>
    <property type="molecule type" value="Genomic_RNA"/>
</dbReference>
<dbReference type="EMBL" id="MW972848">
    <property type="protein sequence ID" value="QTZ34970.1"/>
    <property type="molecule type" value="Genomic_RNA"/>
</dbReference>
<dbReference type="EMBL" id="MW972849">
    <property type="protein sequence ID" value="QTZ34982.1"/>
    <property type="molecule type" value="Genomic_RNA"/>
</dbReference>
<dbReference type="EMBL" id="MW972850">
    <property type="protein sequence ID" value="QTZ34994.1"/>
    <property type="molecule type" value="Genomic_RNA"/>
</dbReference>
<dbReference type="EMBL" id="MW972851">
    <property type="protein sequence ID" value="QTZ35006.1"/>
    <property type="molecule type" value="Genomic_RNA"/>
</dbReference>
<dbReference type="EMBL" id="MW972852">
    <property type="protein sequence ID" value="QTZ35018.1"/>
    <property type="molecule type" value="Genomic_RNA"/>
</dbReference>
<dbReference type="EMBL" id="MW972853">
    <property type="protein sequence ID" value="QTZ35030.1"/>
    <property type="molecule type" value="Genomic_RNA"/>
</dbReference>
<dbReference type="EMBL" id="MW972854">
    <property type="protein sequence ID" value="QTZ35042.1"/>
    <property type="molecule type" value="Genomic_RNA"/>
</dbReference>
<dbReference type="EMBL" id="MW972855">
    <property type="protein sequence ID" value="QTZ35054.1"/>
    <property type="molecule type" value="Genomic_RNA"/>
</dbReference>
<dbReference type="EMBL" id="MW972856">
    <property type="protein sequence ID" value="QTZ35066.1"/>
    <property type="molecule type" value="Genomic_RNA"/>
</dbReference>
<dbReference type="EMBL" id="MW972857">
    <property type="protein sequence ID" value="QTZ35078.1"/>
    <property type="molecule type" value="Genomic_RNA"/>
</dbReference>
<dbReference type="EMBL" id="MW972858">
    <property type="protein sequence ID" value="QTZ35090.1"/>
    <property type="molecule type" value="Genomic_RNA"/>
</dbReference>
<dbReference type="EMBL" id="MW972859">
    <property type="protein sequence ID" value="QTZ35102.1"/>
    <property type="molecule type" value="Genomic_RNA"/>
</dbReference>
<dbReference type="EMBL" id="MW972860">
    <property type="protein sequence ID" value="QTZ35114.1"/>
    <property type="molecule type" value="Genomic_RNA"/>
</dbReference>
<dbReference type="EMBL" id="MW972861">
    <property type="protein sequence ID" value="QTZ35126.1"/>
    <property type="molecule type" value="Genomic_RNA"/>
</dbReference>
<dbReference type="EMBL" id="MW972862">
    <property type="protein sequence ID" value="QTZ35138.1"/>
    <property type="molecule type" value="Genomic_RNA"/>
</dbReference>
<dbReference type="EMBL" id="MW972863">
    <property type="protein sequence ID" value="QTZ35150.1"/>
    <property type="molecule type" value="Genomic_RNA"/>
</dbReference>
<dbReference type="EMBL" id="MW972864">
    <property type="protein sequence ID" value="QTZ35162.1"/>
    <property type="molecule type" value="Genomic_RNA"/>
</dbReference>
<dbReference type="EMBL" id="MW972865">
    <property type="protein sequence ID" value="QTZ35174.1"/>
    <property type="molecule type" value="Genomic_RNA"/>
</dbReference>
<dbReference type="EMBL" id="MW972866">
    <property type="protein sequence ID" value="QTZ35186.1"/>
    <property type="molecule type" value="Genomic_RNA"/>
</dbReference>
<dbReference type="EMBL" id="MW972867">
    <property type="protein sequence ID" value="QTZ35198.1"/>
    <property type="molecule type" value="Genomic_RNA"/>
</dbReference>
<dbReference type="EMBL" id="MW972868">
    <property type="protein sequence ID" value="QTZ35210.1"/>
    <property type="molecule type" value="Genomic_RNA"/>
</dbReference>
<dbReference type="EMBL" id="MW972869">
    <property type="protein sequence ID" value="QTZ35222.1"/>
    <property type="molecule type" value="Genomic_RNA"/>
</dbReference>
<dbReference type="EMBL" id="MW972870">
    <property type="protein sequence ID" value="QTZ35234.1"/>
    <property type="molecule type" value="Genomic_RNA"/>
</dbReference>
<dbReference type="EMBL" id="MW972871">
    <property type="protein sequence ID" value="QTZ35246.1"/>
    <property type="molecule type" value="Genomic_RNA"/>
</dbReference>
<dbReference type="EMBL" id="MW972872">
    <property type="protein sequence ID" value="QTZ35258.1"/>
    <property type="molecule type" value="Genomic_RNA"/>
</dbReference>
<dbReference type="EMBL" id="MW972873">
    <property type="protein sequence ID" value="QTZ35270.1"/>
    <property type="molecule type" value="Genomic_RNA"/>
</dbReference>
<dbReference type="EMBL" id="MW972874">
    <property type="protein sequence ID" value="QTZ35282.1"/>
    <property type="molecule type" value="Genomic_RNA"/>
</dbReference>
<dbReference type="EMBL" id="MW972875">
    <property type="protein sequence ID" value="QTZ35294.1"/>
    <property type="molecule type" value="Genomic_RNA"/>
</dbReference>
<dbReference type="EMBL" id="MW972876">
    <property type="protein sequence ID" value="QTZ35306.1"/>
    <property type="molecule type" value="Genomic_RNA"/>
</dbReference>
<dbReference type="EMBL" id="MW972877">
    <property type="protein sequence ID" value="QTZ35318.1"/>
    <property type="molecule type" value="Genomic_RNA"/>
</dbReference>
<dbReference type="EMBL" id="MW972878">
    <property type="protein sequence ID" value="QTZ35330.1"/>
    <property type="molecule type" value="Genomic_RNA"/>
</dbReference>
<dbReference type="EMBL" id="MW972879">
    <property type="protein sequence ID" value="QTZ35342.1"/>
    <property type="molecule type" value="Genomic_RNA"/>
</dbReference>
<dbReference type="EMBL" id="MW972880">
    <property type="protein sequence ID" value="QTZ35354.1"/>
    <property type="molecule type" value="Genomic_RNA"/>
</dbReference>
<dbReference type="EMBL" id="MW972881">
    <property type="protein sequence ID" value="QTZ35366.1"/>
    <property type="molecule type" value="Genomic_RNA"/>
</dbReference>
<dbReference type="EMBL" id="MW972882">
    <property type="protein sequence ID" value="QTZ35378.1"/>
    <property type="molecule type" value="Genomic_RNA"/>
</dbReference>
<dbReference type="EMBL" id="MW972883">
    <property type="protein sequence ID" value="QTZ35390.1"/>
    <property type="molecule type" value="Genomic_RNA"/>
</dbReference>
<dbReference type="EMBL" id="MW972884">
    <property type="protein sequence ID" value="QTZ35402.1"/>
    <property type="molecule type" value="Genomic_RNA"/>
</dbReference>
<dbReference type="EMBL" id="MW972885">
    <property type="protein sequence ID" value="QTZ35414.1"/>
    <property type="molecule type" value="Genomic_RNA"/>
</dbReference>
<dbReference type="EMBL" id="MW972886">
    <property type="protein sequence ID" value="QTZ35426.1"/>
    <property type="molecule type" value="Genomic_RNA"/>
</dbReference>
<dbReference type="EMBL" id="MW972887">
    <property type="protein sequence ID" value="QTZ35438.1"/>
    <property type="molecule type" value="Genomic_RNA"/>
</dbReference>
<dbReference type="EMBL" id="MW972888">
    <property type="protein sequence ID" value="QTZ35450.1"/>
    <property type="molecule type" value="Genomic_RNA"/>
</dbReference>
<dbReference type="EMBL" id="MW972889">
    <property type="protein sequence ID" value="QTZ35462.1"/>
    <property type="molecule type" value="Genomic_RNA"/>
</dbReference>
<dbReference type="EMBL" id="MW972890">
    <property type="protein sequence ID" value="QTZ35474.1"/>
    <property type="molecule type" value="Genomic_RNA"/>
</dbReference>
<dbReference type="EMBL" id="MW972891">
    <property type="protein sequence ID" value="QTZ35486.1"/>
    <property type="molecule type" value="Genomic_RNA"/>
</dbReference>
<dbReference type="EMBL" id="MW972892">
    <property type="protein sequence ID" value="QTZ35498.1"/>
    <property type="molecule type" value="Genomic_RNA"/>
</dbReference>
<dbReference type="EMBL" id="MW972893">
    <property type="protein sequence ID" value="QTZ35510.1"/>
    <property type="molecule type" value="Genomic_RNA"/>
</dbReference>
<dbReference type="EMBL" id="MW972894">
    <property type="protein sequence ID" value="QTZ35522.1"/>
    <property type="molecule type" value="Genomic_RNA"/>
</dbReference>
<dbReference type="EMBL" id="MW972895">
    <property type="protein sequence ID" value="QTZ35534.1"/>
    <property type="molecule type" value="Genomic_RNA"/>
</dbReference>
<dbReference type="EMBL" id="MW972896">
    <property type="protein sequence ID" value="QTZ35546.1"/>
    <property type="molecule type" value="Genomic_RNA"/>
</dbReference>
<dbReference type="EMBL" id="MW972897">
    <property type="protein sequence ID" value="QTZ35558.1"/>
    <property type="molecule type" value="Genomic_RNA"/>
</dbReference>
<dbReference type="EMBL" id="MW972898">
    <property type="protein sequence ID" value="QTZ35570.1"/>
    <property type="molecule type" value="Genomic_RNA"/>
</dbReference>
<dbReference type="EMBL" id="MW972899">
    <property type="protein sequence ID" value="QTZ35582.1"/>
    <property type="molecule type" value="Genomic_RNA"/>
</dbReference>
<dbReference type="EMBL" id="MW972900">
    <property type="protein sequence ID" value="QTZ35594.1"/>
    <property type="molecule type" value="Genomic_RNA"/>
</dbReference>
<dbReference type="EMBL" id="MW972901">
    <property type="protein sequence ID" value="QTZ35606.1"/>
    <property type="molecule type" value="Genomic_RNA"/>
</dbReference>
<dbReference type="EMBL" id="MW972902">
    <property type="protein sequence ID" value="QTZ35618.1"/>
    <property type="molecule type" value="Genomic_RNA"/>
</dbReference>
<dbReference type="EMBL" id="MW972903">
    <property type="protein sequence ID" value="QTZ35630.1"/>
    <property type="molecule type" value="Genomic_RNA"/>
</dbReference>
<dbReference type="EMBL" id="MW972904">
    <property type="protein sequence ID" value="QTZ35642.1"/>
    <property type="molecule type" value="Genomic_RNA"/>
</dbReference>
<dbReference type="EMBL" id="MW972905">
    <property type="protein sequence ID" value="QTZ35654.1"/>
    <property type="molecule type" value="Genomic_RNA"/>
</dbReference>
<dbReference type="EMBL" id="MW972906">
    <property type="protein sequence ID" value="QTZ35666.1"/>
    <property type="molecule type" value="Genomic_RNA"/>
</dbReference>
<dbReference type="EMBL" id="MW972907">
    <property type="protein sequence ID" value="QTZ35678.1"/>
    <property type="molecule type" value="Genomic_RNA"/>
</dbReference>
<dbReference type="EMBL" id="MW972908">
    <property type="protein sequence ID" value="QTZ35690.1"/>
    <property type="molecule type" value="Genomic_RNA"/>
</dbReference>
<dbReference type="EMBL" id="MW972909">
    <property type="protein sequence ID" value="QTZ35702.1"/>
    <property type="molecule type" value="Genomic_RNA"/>
</dbReference>
<dbReference type="EMBL" id="MW972910">
    <property type="protein sequence ID" value="QTZ35714.1"/>
    <property type="molecule type" value="Genomic_RNA"/>
</dbReference>
<dbReference type="EMBL" id="MW972911">
    <property type="protein sequence ID" value="QTZ35726.1"/>
    <property type="molecule type" value="Genomic_RNA"/>
</dbReference>
<dbReference type="EMBL" id="MW972912">
    <property type="protein sequence ID" value="QTZ35738.1"/>
    <property type="molecule type" value="Genomic_RNA"/>
</dbReference>
<dbReference type="EMBL" id="MW972913">
    <property type="protein sequence ID" value="QTZ35750.1"/>
    <property type="molecule type" value="Genomic_RNA"/>
</dbReference>
<dbReference type="EMBL" id="MW972914">
    <property type="protein sequence ID" value="QTZ35762.1"/>
    <property type="molecule type" value="Genomic_RNA"/>
</dbReference>
<dbReference type="EMBL" id="MW972915">
    <property type="protein sequence ID" value="QTZ35774.1"/>
    <property type="molecule type" value="Genomic_RNA"/>
</dbReference>
<dbReference type="EMBL" id="MW972916">
    <property type="protein sequence ID" value="QTZ35786.1"/>
    <property type="molecule type" value="Genomic_RNA"/>
</dbReference>
<dbReference type="EMBL" id="MW972917">
    <property type="protein sequence ID" value="QTZ35798.1"/>
    <property type="molecule type" value="Genomic_RNA"/>
</dbReference>
<dbReference type="EMBL" id="MW972918">
    <property type="protein sequence ID" value="QTZ35810.1"/>
    <property type="molecule type" value="Genomic_RNA"/>
</dbReference>
<dbReference type="EMBL" id="MW972919">
    <property type="protein sequence ID" value="QTZ35822.1"/>
    <property type="molecule type" value="Genomic_RNA"/>
</dbReference>
<dbReference type="EMBL" id="MW972920">
    <property type="protein sequence ID" value="QTZ35834.1"/>
    <property type="molecule type" value="Genomic_RNA"/>
</dbReference>
<dbReference type="EMBL" id="MW972921">
    <property type="protein sequence ID" value="QTZ35846.1"/>
    <property type="molecule type" value="Genomic_RNA"/>
</dbReference>
<dbReference type="EMBL" id="MW972922">
    <property type="protein sequence ID" value="QTZ35858.1"/>
    <property type="molecule type" value="Genomic_RNA"/>
</dbReference>
<dbReference type="EMBL" id="MW972923">
    <property type="protein sequence ID" value="QTZ35870.1"/>
    <property type="molecule type" value="Genomic_RNA"/>
</dbReference>
<dbReference type="EMBL" id="MW972924">
    <property type="protein sequence ID" value="QTZ35882.1"/>
    <property type="molecule type" value="Genomic_RNA"/>
</dbReference>
<dbReference type="EMBL" id="MW972925">
    <property type="protein sequence ID" value="QTZ35894.1"/>
    <property type="molecule type" value="Genomic_RNA"/>
</dbReference>
<dbReference type="EMBL" id="MW972926">
    <property type="protein sequence ID" value="QTZ35906.1"/>
    <property type="molecule type" value="Genomic_RNA"/>
</dbReference>
<dbReference type="EMBL" id="MW972927">
    <property type="protein sequence ID" value="QTZ35918.1"/>
    <property type="molecule type" value="Genomic_RNA"/>
</dbReference>
<dbReference type="EMBL" id="MW972928">
    <property type="protein sequence ID" value="QTZ35930.1"/>
    <property type="molecule type" value="Genomic_RNA"/>
</dbReference>
<dbReference type="EMBL" id="MW972929">
    <property type="protein sequence ID" value="QTZ35942.1"/>
    <property type="molecule type" value="Genomic_RNA"/>
</dbReference>
<dbReference type="EMBL" id="MW972930">
    <property type="protein sequence ID" value="QTZ35954.1"/>
    <property type="molecule type" value="Genomic_RNA"/>
</dbReference>
<dbReference type="EMBL" id="MW972931">
    <property type="protein sequence ID" value="QTZ35966.1"/>
    <property type="molecule type" value="Genomic_RNA"/>
</dbReference>
<dbReference type="EMBL" id="MW972932">
    <property type="protein sequence ID" value="QTZ35978.1"/>
    <property type="molecule type" value="Genomic_RNA"/>
</dbReference>
<dbReference type="EMBL" id="MW972933">
    <property type="protein sequence ID" value="QTZ35990.1"/>
    <property type="molecule type" value="Genomic_RNA"/>
</dbReference>
<dbReference type="EMBL" id="MW972934">
    <property type="protein sequence ID" value="QTZ36002.1"/>
    <property type="molecule type" value="Genomic_RNA"/>
</dbReference>
<dbReference type="EMBL" id="MW972935">
    <property type="protein sequence ID" value="QTZ36014.1"/>
    <property type="molecule type" value="Genomic_RNA"/>
</dbReference>
<dbReference type="EMBL" id="MW972937">
    <property type="protein sequence ID" value="QTZ36038.1"/>
    <property type="molecule type" value="Genomic_RNA"/>
</dbReference>
<dbReference type="EMBL" id="MW972938">
    <property type="protein sequence ID" value="QTZ36050.1"/>
    <property type="molecule type" value="Genomic_RNA"/>
</dbReference>
<dbReference type="EMBL" id="MW972939">
    <property type="protein sequence ID" value="QTZ36062.1"/>
    <property type="molecule type" value="Genomic_RNA"/>
</dbReference>
<dbReference type="EMBL" id="MW972940">
    <property type="protein sequence ID" value="QTZ36074.1"/>
    <property type="molecule type" value="Genomic_RNA"/>
</dbReference>
<dbReference type="EMBL" id="MW972941">
    <property type="protein sequence ID" value="QTZ36086.1"/>
    <property type="molecule type" value="Genomic_RNA"/>
</dbReference>
<dbReference type="EMBL" id="MW972943">
    <property type="protein sequence ID" value="QTZ36110.1"/>
    <property type="molecule type" value="Genomic_RNA"/>
</dbReference>
<dbReference type="EMBL" id="MW972944">
    <property type="protein sequence ID" value="QTZ36122.1"/>
    <property type="molecule type" value="Genomic_RNA"/>
</dbReference>
<dbReference type="EMBL" id="MW972945">
    <property type="protein sequence ID" value="QTZ36134.1"/>
    <property type="molecule type" value="Genomic_RNA"/>
</dbReference>
<dbReference type="EMBL" id="MW972946">
    <property type="protein sequence ID" value="QTZ36146.1"/>
    <property type="molecule type" value="Genomic_RNA"/>
</dbReference>
<dbReference type="EMBL" id="MW972947">
    <property type="protein sequence ID" value="QTZ36158.1"/>
    <property type="molecule type" value="Genomic_RNA"/>
</dbReference>
<dbReference type="EMBL" id="MW972948">
    <property type="protein sequence ID" value="QTZ36170.1"/>
    <property type="molecule type" value="Genomic_RNA"/>
</dbReference>
<dbReference type="EMBL" id="MW972949">
    <property type="protein sequence ID" value="QTZ36182.1"/>
    <property type="molecule type" value="Genomic_RNA"/>
</dbReference>
<dbReference type="EMBL" id="MW972950">
    <property type="protein sequence ID" value="QTZ36194.1"/>
    <property type="molecule type" value="Genomic_RNA"/>
</dbReference>
<dbReference type="EMBL" id="MW972951">
    <property type="protein sequence ID" value="QTZ36206.1"/>
    <property type="molecule type" value="Genomic_RNA"/>
</dbReference>
<dbReference type="EMBL" id="MW972952">
    <property type="protein sequence ID" value="QTZ36218.1"/>
    <property type="molecule type" value="Genomic_RNA"/>
</dbReference>
<dbReference type="EMBL" id="MW972953">
    <property type="protein sequence ID" value="QTZ36230.1"/>
    <property type="molecule type" value="Genomic_RNA"/>
</dbReference>
<dbReference type="EMBL" id="MW972954">
    <property type="protein sequence ID" value="QTZ36242.1"/>
    <property type="molecule type" value="Genomic_RNA"/>
</dbReference>
<dbReference type="EMBL" id="MW972955">
    <property type="protein sequence ID" value="QTZ36254.1"/>
    <property type="molecule type" value="Genomic_RNA"/>
</dbReference>
<dbReference type="EMBL" id="MW972956">
    <property type="protein sequence ID" value="QTZ36266.1"/>
    <property type="molecule type" value="Genomic_RNA"/>
</dbReference>
<dbReference type="EMBL" id="MW972957">
    <property type="protein sequence ID" value="QTZ36278.1"/>
    <property type="molecule type" value="Genomic_RNA"/>
</dbReference>
<dbReference type="EMBL" id="MW972958">
    <property type="protein sequence ID" value="QTZ36290.1"/>
    <property type="molecule type" value="Genomic_RNA"/>
</dbReference>
<dbReference type="EMBL" id="MW972959">
    <property type="protein sequence ID" value="QTZ36302.1"/>
    <property type="molecule type" value="Genomic_RNA"/>
</dbReference>
<dbReference type="EMBL" id="MW972960">
    <property type="protein sequence ID" value="QTZ36314.1"/>
    <property type="molecule type" value="Genomic_RNA"/>
</dbReference>
<dbReference type="EMBL" id="MW972961">
    <property type="protein sequence ID" value="QTZ36326.1"/>
    <property type="molecule type" value="Genomic_RNA"/>
</dbReference>
<dbReference type="EMBL" id="MW972962">
    <property type="protein sequence ID" value="QTZ36338.1"/>
    <property type="molecule type" value="Genomic_RNA"/>
</dbReference>
<dbReference type="EMBL" id="MW972963">
    <property type="protein sequence ID" value="QTZ36350.1"/>
    <property type="molecule type" value="Genomic_RNA"/>
</dbReference>
<dbReference type="EMBL" id="MW972964">
    <property type="protein sequence ID" value="QTZ36362.1"/>
    <property type="molecule type" value="Genomic_RNA"/>
</dbReference>
<dbReference type="EMBL" id="MW972965">
    <property type="protein sequence ID" value="QTZ36374.1"/>
    <property type="molecule type" value="Genomic_RNA"/>
</dbReference>
<dbReference type="EMBL" id="MW972966">
    <property type="protein sequence ID" value="QTZ36386.1"/>
    <property type="molecule type" value="Genomic_RNA"/>
</dbReference>
<dbReference type="EMBL" id="MW972967">
    <property type="protein sequence ID" value="QTZ36398.1"/>
    <property type="molecule type" value="Genomic_RNA"/>
</dbReference>
<dbReference type="EMBL" id="MW972968">
    <property type="protein sequence ID" value="QTZ36410.1"/>
    <property type="molecule type" value="Genomic_RNA"/>
</dbReference>
<dbReference type="EMBL" id="MW972969">
    <property type="protein sequence ID" value="QTZ36422.1"/>
    <property type="molecule type" value="Genomic_RNA"/>
</dbReference>
<dbReference type="EMBL" id="MW972970">
    <property type="protein sequence ID" value="QTZ36434.1"/>
    <property type="molecule type" value="Genomic_RNA"/>
</dbReference>
<dbReference type="EMBL" id="MW972971">
    <property type="protein sequence ID" value="QTZ36446.1"/>
    <property type="molecule type" value="Genomic_RNA"/>
</dbReference>
<dbReference type="EMBL" id="MW972972">
    <property type="protein sequence ID" value="QTZ36458.1"/>
    <property type="molecule type" value="Genomic_RNA"/>
</dbReference>
<dbReference type="EMBL" id="MW972973">
    <property type="protein sequence ID" value="QTZ36470.1"/>
    <property type="molecule type" value="Genomic_RNA"/>
</dbReference>
<dbReference type="EMBL" id="MW972974">
    <property type="protein sequence ID" value="QTZ36482.1"/>
    <property type="molecule type" value="Genomic_RNA"/>
</dbReference>
<dbReference type="EMBL" id="MW972975">
    <property type="protein sequence ID" value="QTZ36494.1"/>
    <property type="molecule type" value="Genomic_RNA"/>
</dbReference>
<dbReference type="EMBL" id="MW972976">
    <property type="protein sequence ID" value="QTZ36506.1"/>
    <property type="molecule type" value="Genomic_RNA"/>
</dbReference>
<dbReference type="EMBL" id="MW972977">
    <property type="protein sequence ID" value="QTZ36518.1"/>
    <property type="molecule type" value="Genomic_RNA"/>
</dbReference>
<dbReference type="EMBL" id="MW972978">
    <property type="protein sequence ID" value="QTZ36530.1"/>
    <property type="molecule type" value="Genomic_RNA"/>
</dbReference>
<dbReference type="EMBL" id="MW972979">
    <property type="protein sequence ID" value="QTZ36542.1"/>
    <property type="molecule type" value="Genomic_RNA"/>
</dbReference>
<dbReference type="EMBL" id="MW972980">
    <property type="protein sequence ID" value="QTZ36554.1"/>
    <property type="molecule type" value="Genomic_RNA"/>
</dbReference>
<dbReference type="EMBL" id="MW972981">
    <property type="protein sequence ID" value="QTZ36566.1"/>
    <property type="molecule type" value="Genomic_RNA"/>
</dbReference>
<dbReference type="EMBL" id="MW972982">
    <property type="protein sequence ID" value="QTZ36578.1"/>
    <property type="molecule type" value="Genomic_RNA"/>
</dbReference>
<dbReference type="EMBL" id="MW972983">
    <property type="protein sequence ID" value="QTZ36590.1"/>
    <property type="molecule type" value="Genomic_RNA"/>
</dbReference>
<dbReference type="EMBL" id="MW972984">
    <property type="protein sequence ID" value="QTZ36602.1"/>
    <property type="molecule type" value="Genomic_RNA"/>
</dbReference>
<dbReference type="EMBL" id="MW972985">
    <property type="protein sequence ID" value="QTZ36614.1"/>
    <property type="molecule type" value="Genomic_RNA"/>
</dbReference>
<dbReference type="EMBL" id="MW972986">
    <property type="protein sequence ID" value="QTZ36626.1"/>
    <property type="molecule type" value="Genomic_RNA"/>
</dbReference>
<dbReference type="EMBL" id="MW972987">
    <property type="protein sequence ID" value="QTZ36638.1"/>
    <property type="molecule type" value="Genomic_RNA"/>
</dbReference>
<dbReference type="EMBL" id="MW972988">
    <property type="protein sequence ID" value="QTZ36650.1"/>
    <property type="molecule type" value="Genomic_RNA"/>
</dbReference>
<dbReference type="EMBL" id="MW972989">
    <property type="protein sequence ID" value="QTZ36662.1"/>
    <property type="molecule type" value="Genomic_RNA"/>
</dbReference>
<dbReference type="EMBL" id="MW972990">
    <property type="protein sequence ID" value="QTZ36674.1"/>
    <property type="molecule type" value="Genomic_RNA"/>
</dbReference>
<dbReference type="EMBL" id="MW972991">
    <property type="protein sequence ID" value="QTZ36686.1"/>
    <property type="molecule type" value="Genomic_RNA"/>
</dbReference>
<dbReference type="EMBL" id="MW972992">
    <property type="protein sequence ID" value="QTZ36698.1"/>
    <property type="molecule type" value="Genomic_RNA"/>
</dbReference>
<dbReference type="EMBL" id="MW972993">
    <property type="protein sequence ID" value="QTZ36710.1"/>
    <property type="molecule type" value="Genomic_RNA"/>
</dbReference>
<dbReference type="EMBL" id="MW972994">
    <property type="protein sequence ID" value="QTZ36722.1"/>
    <property type="molecule type" value="Genomic_RNA"/>
</dbReference>
<dbReference type="EMBL" id="MW972995">
    <property type="protein sequence ID" value="QTZ36734.1"/>
    <property type="molecule type" value="Genomic_RNA"/>
</dbReference>
<dbReference type="EMBL" id="MW972996">
    <property type="protein sequence ID" value="QTZ36746.1"/>
    <property type="molecule type" value="Genomic_RNA"/>
</dbReference>
<dbReference type="EMBL" id="MW972998">
    <property type="protein sequence ID" value="QTZ36770.1"/>
    <property type="molecule type" value="Genomic_RNA"/>
</dbReference>
<dbReference type="EMBL" id="MW972999">
    <property type="protein sequence ID" value="QTZ36782.1"/>
    <property type="molecule type" value="Genomic_RNA"/>
</dbReference>
<dbReference type="EMBL" id="MW973000">
    <property type="protein sequence ID" value="QTZ36794.1"/>
    <property type="molecule type" value="Genomic_RNA"/>
</dbReference>
<dbReference type="EMBL" id="MW973001">
    <property type="protein sequence ID" value="QTZ36806.1"/>
    <property type="molecule type" value="Genomic_RNA"/>
</dbReference>
<dbReference type="EMBL" id="MW973002">
    <property type="protein sequence ID" value="QTZ36818.1"/>
    <property type="molecule type" value="Genomic_RNA"/>
</dbReference>
<dbReference type="EMBL" id="MW973003">
    <property type="protein sequence ID" value="QTZ36830.1"/>
    <property type="molecule type" value="Genomic_RNA"/>
</dbReference>
<dbReference type="EMBL" id="MW973004">
    <property type="protein sequence ID" value="QTZ36842.1"/>
    <property type="molecule type" value="Genomic_RNA"/>
</dbReference>
<dbReference type="EMBL" id="MW973005">
    <property type="protein sequence ID" value="QTZ36854.1"/>
    <property type="molecule type" value="Genomic_RNA"/>
</dbReference>
<dbReference type="EMBL" id="MW973006">
    <property type="protein sequence ID" value="QTZ36866.1"/>
    <property type="molecule type" value="Genomic_RNA"/>
</dbReference>
<dbReference type="EMBL" id="MW973007">
    <property type="protein sequence ID" value="QTZ36878.1"/>
    <property type="molecule type" value="Genomic_RNA"/>
</dbReference>
<dbReference type="EMBL" id="MW973008">
    <property type="protein sequence ID" value="QTZ36890.1"/>
    <property type="molecule type" value="Genomic_RNA"/>
</dbReference>
<dbReference type="EMBL" id="MW973010">
    <property type="protein sequence ID" value="QTZ36914.1"/>
    <property type="molecule type" value="Genomic_RNA"/>
</dbReference>
<dbReference type="EMBL" id="MW973012">
    <property type="protein sequence ID" value="QTZ36938.1"/>
    <property type="molecule type" value="Genomic_RNA"/>
</dbReference>
<dbReference type="EMBL" id="MW973013">
    <property type="protein sequence ID" value="QTZ36950.1"/>
    <property type="molecule type" value="Genomic_RNA"/>
</dbReference>
<dbReference type="EMBL" id="MW973014">
    <property type="protein sequence ID" value="QTZ36962.1"/>
    <property type="molecule type" value="Genomic_RNA"/>
</dbReference>
<dbReference type="EMBL" id="MW973015">
    <property type="protein sequence ID" value="QTZ36974.1"/>
    <property type="molecule type" value="Genomic_RNA"/>
</dbReference>
<dbReference type="EMBL" id="MW973016">
    <property type="protein sequence ID" value="QTZ36986.1"/>
    <property type="molecule type" value="Genomic_RNA"/>
</dbReference>
<dbReference type="EMBL" id="MW973017">
    <property type="protein sequence ID" value="QTZ36998.1"/>
    <property type="molecule type" value="Genomic_RNA"/>
</dbReference>
<dbReference type="EMBL" id="MW973018">
    <property type="protein sequence ID" value="QTZ37010.1"/>
    <property type="molecule type" value="Genomic_RNA"/>
</dbReference>
<dbReference type="EMBL" id="MW973019">
    <property type="protein sequence ID" value="QTZ37022.1"/>
    <property type="molecule type" value="Genomic_RNA"/>
</dbReference>
<dbReference type="EMBL" id="MW973020">
    <property type="protein sequence ID" value="QTZ37034.1"/>
    <property type="molecule type" value="Genomic_RNA"/>
</dbReference>
<dbReference type="EMBL" id="MW973021">
    <property type="protein sequence ID" value="QTZ37046.1"/>
    <property type="molecule type" value="Genomic_RNA"/>
</dbReference>
<dbReference type="EMBL" id="MW973022">
    <property type="protein sequence ID" value="QTZ37058.1"/>
    <property type="molecule type" value="Genomic_RNA"/>
</dbReference>
<dbReference type="EMBL" id="MW973023">
    <property type="protein sequence ID" value="QTZ37070.1"/>
    <property type="molecule type" value="Genomic_RNA"/>
</dbReference>
<dbReference type="EMBL" id="MW973024">
    <property type="protein sequence ID" value="QTZ37082.1"/>
    <property type="molecule type" value="Genomic_RNA"/>
</dbReference>
<dbReference type="EMBL" id="MW973025">
    <property type="protein sequence ID" value="QTZ37094.1"/>
    <property type="molecule type" value="Genomic_RNA"/>
</dbReference>
<dbReference type="EMBL" id="MW973026">
    <property type="protein sequence ID" value="QTZ37106.1"/>
    <property type="molecule type" value="Genomic_RNA"/>
</dbReference>
<dbReference type="EMBL" id="MW973027">
    <property type="protein sequence ID" value="QTZ37118.1"/>
    <property type="molecule type" value="Genomic_RNA"/>
</dbReference>
<dbReference type="EMBL" id="MW973028">
    <property type="protein sequence ID" value="QTZ37130.1"/>
    <property type="molecule type" value="Genomic_RNA"/>
</dbReference>
<dbReference type="EMBL" id="MW973029">
    <property type="protein sequence ID" value="QTZ37142.1"/>
    <property type="molecule type" value="Genomic_RNA"/>
</dbReference>
<dbReference type="EMBL" id="MW973030">
    <property type="protein sequence ID" value="QTZ37154.1"/>
    <property type="molecule type" value="Genomic_RNA"/>
</dbReference>
<dbReference type="EMBL" id="MW973031">
    <property type="protein sequence ID" value="QTZ37166.1"/>
    <property type="molecule type" value="Genomic_RNA"/>
</dbReference>
<dbReference type="EMBL" id="MW973032">
    <property type="protein sequence ID" value="QTZ37178.1"/>
    <property type="molecule type" value="Genomic_RNA"/>
</dbReference>
<dbReference type="EMBL" id="MW973033">
    <property type="protein sequence ID" value="QTZ37190.1"/>
    <property type="molecule type" value="Genomic_RNA"/>
</dbReference>
<dbReference type="EMBL" id="MW973034">
    <property type="protein sequence ID" value="QTZ37202.1"/>
    <property type="molecule type" value="Genomic_RNA"/>
</dbReference>
<dbReference type="EMBL" id="MW973035">
    <property type="protein sequence ID" value="QTZ37214.1"/>
    <property type="molecule type" value="Genomic_RNA"/>
</dbReference>
<dbReference type="EMBL" id="MW973036">
    <property type="protein sequence ID" value="QTZ37226.1"/>
    <property type="molecule type" value="Genomic_RNA"/>
</dbReference>
<dbReference type="EMBL" id="MW973037">
    <property type="protein sequence ID" value="QTZ37237.1"/>
    <property type="molecule type" value="Genomic_RNA"/>
</dbReference>
<dbReference type="EMBL" id="MW973038">
    <property type="protein sequence ID" value="QTZ37249.1"/>
    <property type="molecule type" value="Genomic_RNA"/>
</dbReference>
<dbReference type="EMBL" id="MW973039">
    <property type="protein sequence ID" value="QTZ37261.1"/>
    <property type="molecule type" value="Genomic_RNA"/>
</dbReference>
<dbReference type="EMBL" id="MW973040">
    <property type="protein sequence ID" value="QTZ37273.1"/>
    <property type="molecule type" value="Genomic_RNA"/>
</dbReference>
<dbReference type="EMBL" id="MW973041">
    <property type="protein sequence ID" value="QTZ37285.1"/>
    <property type="molecule type" value="Genomic_RNA"/>
</dbReference>
<dbReference type="EMBL" id="MW973042">
    <property type="protein sequence ID" value="QTZ37297.1"/>
    <property type="molecule type" value="Genomic_RNA"/>
</dbReference>
<dbReference type="EMBL" id="MW973043">
    <property type="protein sequence ID" value="QTZ37309.1"/>
    <property type="molecule type" value="Genomic_RNA"/>
</dbReference>
<dbReference type="EMBL" id="MW973044">
    <property type="protein sequence ID" value="QTZ37321.1"/>
    <property type="molecule type" value="Genomic_RNA"/>
</dbReference>
<dbReference type="EMBL" id="MW973045">
    <property type="protein sequence ID" value="QTZ37333.1"/>
    <property type="molecule type" value="Genomic_RNA"/>
</dbReference>
<dbReference type="EMBL" id="MW973046">
    <property type="protein sequence ID" value="QTZ37345.1"/>
    <property type="molecule type" value="Genomic_RNA"/>
</dbReference>
<dbReference type="EMBL" id="MW973047">
    <property type="protein sequence ID" value="QTZ37356.1"/>
    <property type="molecule type" value="Genomic_RNA"/>
</dbReference>
<dbReference type="EMBL" id="MW973048">
    <property type="protein sequence ID" value="QTZ37368.1"/>
    <property type="molecule type" value="Genomic_RNA"/>
</dbReference>
<dbReference type="EMBL" id="MW973049">
    <property type="protein sequence ID" value="QTZ37380.1"/>
    <property type="molecule type" value="Genomic_RNA"/>
</dbReference>
<dbReference type="EMBL" id="MW973050">
    <property type="protein sequence ID" value="QTZ37392.1"/>
    <property type="molecule type" value="Genomic_RNA"/>
</dbReference>
<dbReference type="EMBL" id="MW973051">
    <property type="protein sequence ID" value="QTZ37404.1"/>
    <property type="molecule type" value="Genomic_RNA"/>
</dbReference>
<dbReference type="EMBL" id="MW973052">
    <property type="protein sequence ID" value="QTZ37416.1"/>
    <property type="molecule type" value="Genomic_RNA"/>
</dbReference>
<dbReference type="EMBL" id="MW973053">
    <property type="protein sequence ID" value="QTZ37428.1"/>
    <property type="molecule type" value="Genomic_RNA"/>
</dbReference>
<dbReference type="EMBL" id="MW973054">
    <property type="protein sequence ID" value="QTZ37440.1"/>
    <property type="molecule type" value="Genomic_RNA"/>
</dbReference>
<dbReference type="EMBL" id="MW973055">
    <property type="protein sequence ID" value="QTZ37452.1"/>
    <property type="molecule type" value="Genomic_RNA"/>
</dbReference>
<dbReference type="EMBL" id="MW973056">
    <property type="protein sequence ID" value="QTZ37464.1"/>
    <property type="molecule type" value="Genomic_RNA"/>
</dbReference>
<dbReference type="EMBL" id="MW973057">
    <property type="protein sequence ID" value="QTZ37476.1"/>
    <property type="molecule type" value="Genomic_RNA"/>
</dbReference>
<dbReference type="EMBL" id="MW973058">
    <property type="protein sequence ID" value="QTZ37488.1"/>
    <property type="molecule type" value="Genomic_RNA"/>
</dbReference>
<dbReference type="EMBL" id="MW973059">
    <property type="protein sequence ID" value="QTZ37500.1"/>
    <property type="molecule type" value="Genomic_RNA"/>
</dbReference>
<dbReference type="EMBL" id="MW973060">
    <property type="protein sequence ID" value="QTZ37512.1"/>
    <property type="molecule type" value="Genomic_RNA"/>
</dbReference>
<dbReference type="EMBL" id="MW973061">
    <property type="protein sequence ID" value="QTZ37524.1"/>
    <property type="molecule type" value="Genomic_RNA"/>
</dbReference>
<dbReference type="EMBL" id="MW973062">
    <property type="protein sequence ID" value="QTZ37536.1"/>
    <property type="molecule type" value="Genomic_RNA"/>
</dbReference>
<dbReference type="EMBL" id="MW973063">
    <property type="protein sequence ID" value="QTZ37548.1"/>
    <property type="molecule type" value="Genomic_RNA"/>
</dbReference>
<dbReference type="EMBL" id="MW973065">
    <property type="protein sequence ID" value="QTZ37572.1"/>
    <property type="molecule type" value="Genomic_RNA"/>
</dbReference>
<dbReference type="EMBL" id="MW973066">
    <property type="protein sequence ID" value="QTZ37584.1"/>
    <property type="molecule type" value="Genomic_RNA"/>
</dbReference>
<dbReference type="EMBL" id="MW973067">
    <property type="protein sequence ID" value="QTZ37596.1"/>
    <property type="molecule type" value="Genomic_RNA"/>
</dbReference>
<dbReference type="EMBL" id="MW973068">
    <property type="protein sequence ID" value="QTZ37608.1"/>
    <property type="molecule type" value="Genomic_RNA"/>
</dbReference>
<dbReference type="EMBL" id="MW973070">
    <property type="protein sequence ID" value="QTZ37632.1"/>
    <property type="molecule type" value="Genomic_RNA"/>
</dbReference>
<dbReference type="EMBL" id="MW973071">
    <property type="protein sequence ID" value="QTZ37644.1"/>
    <property type="molecule type" value="Genomic_RNA"/>
</dbReference>
<dbReference type="EMBL" id="MW973072">
    <property type="protein sequence ID" value="QTZ37656.1"/>
    <property type="molecule type" value="Genomic_RNA"/>
</dbReference>
<dbReference type="EMBL" id="MW973073">
    <property type="protein sequence ID" value="QTZ37668.1"/>
    <property type="molecule type" value="Genomic_RNA"/>
</dbReference>
<dbReference type="EMBL" id="MW973074">
    <property type="protein sequence ID" value="QTZ37680.1"/>
    <property type="molecule type" value="Genomic_RNA"/>
</dbReference>
<dbReference type="EMBL" id="MW973075">
    <property type="protein sequence ID" value="QTZ37692.1"/>
    <property type="molecule type" value="Genomic_RNA"/>
</dbReference>
<dbReference type="EMBL" id="MW973076">
    <property type="protein sequence ID" value="QTZ37704.1"/>
    <property type="molecule type" value="Genomic_RNA"/>
</dbReference>
<dbReference type="EMBL" id="MW973077">
    <property type="protein sequence ID" value="QTZ37716.1"/>
    <property type="molecule type" value="Genomic_RNA"/>
</dbReference>
<dbReference type="EMBL" id="MW973078">
    <property type="protein sequence ID" value="QTZ37728.1"/>
    <property type="molecule type" value="Genomic_RNA"/>
</dbReference>
<dbReference type="EMBL" id="MW973079">
    <property type="protein sequence ID" value="QTZ37740.1"/>
    <property type="molecule type" value="Genomic_RNA"/>
</dbReference>
<dbReference type="EMBL" id="MW973080">
    <property type="protein sequence ID" value="QTZ37752.1"/>
    <property type="molecule type" value="Genomic_RNA"/>
</dbReference>
<dbReference type="EMBL" id="MW973081">
    <property type="protein sequence ID" value="QTZ37764.1"/>
    <property type="molecule type" value="Genomic_RNA"/>
</dbReference>
<dbReference type="EMBL" id="MW973082">
    <property type="protein sequence ID" value="QTZ37776.1"/>
    <property type="molecule type" value="Genomic_RNA"/>
</dbReference>
<dbReference type="EMBL" id="MW973083">
    <property type="protein sequence ID" value="QTZ37788.1"/>
    <property type="molecule type" value="Genomic_RNA"/>
</dbReference>
<dbReference type="EMBL" id="MW973084">
    <property type="protein sequence ID" value="QTZ37800.1"/>
    <property type="molecule type" value="Genomic_RNA"/>
</dbReference>
<dbReference type="EMBL" id="MW973085">
    <property type="protein sequence ID" value="QTZ37811.1"/>
    <property type="molecule type" value="Genomic_RNA"/>
</dbReference>
<dbReference type="EMBL" id="MW973086">
    <property type="protein sequence ID" value="QTZ37822.1"/>
    <property type="molecule type" value="Genomic_RNA"/>
</dbReference>
<dbReference type="EMBL" id="MW973087">
    <property type="protein sequence ID" value="QTZ37834.1"/>
    <property type="molecule type" value="Genomic_RNA"/>
</dbReference>
<dbReference type="EMBL" id="MW973088">
    <property type="protein sequence ID" value="QTZ37846.1"/>
    <property type="molecule type" value="Genomic_RNA"/>
</dbReference>
<dbReference type="EMBL" id="MW973089">
    <property type="protein sequence ID" value="QTZ37858.1"/>
    <property type="molecule type" value="Genomic_RNA"/>
</dbReference>
<dbReference type="EMBL" id="MW973090">
    <property type="protein sequence ID" value="QTZ37870.1"/>
    <property type="molecule type" value="Genomic_RNA"/>
</dbReference>
<dbReference type="EMBL" id="MW973091">
    <property type="protein sequence ID" value="QTZ37881.1"/>
    <property type="molecule type" value="Genomic_RNA"/>
</dbReference>
<dbReference type="EMBL" id="MW973092">
    <property type="protein sequence ID" value="QTZ37893.1"/>
    <property type="molecule type" value="Genomic_RNA"/>
</dbReference>
<dbReference type="EMBL" id="MW973093">
    <property type="protein sequence ID" value="QTZ37905.1"/>
    <property type="molecule type" value="Genomic_RNA"/>
</dbReference>
<dbReference type="EMBL" id="MW973095">
    <property type="protein sequence ID" value="QTZ37929.1"/>
    <property type="molecule type" value="Genomic_RNA"/>
</dbReference>
<dbReference type="EMBL" id="MW973096">
    <property type="protein sequence ID" value="QTZ37941.1"/>
    <property type="molecule type" value="Genomic_RNA"/>
</dbReference>
<dbReference type="EMBL" id="MW973097">
    <property type="protein sequence ID" value="QTZ37953.1"/>
    <property type="molecule type" value="Genomic_RNA"/>
</dbReference>
<dbReference type="EMBL" id="MW973098">
    <property type="protein sequence ID" value="QTZ37965.1"/>
    <property type="molecule type" value="Genomic_RNA"/>
</dbReference>
<dbReference type="EMBL" id="MW973099">
    <property type="protein sequence ID" value="QTZ37977.1"/>
    <property type="molecule type" value="Genomic_RNA"/>
</dbReference>
<dbReference type="EMBL" id="MW973100">
    <property type="protein sequence ID" value="QTZ37989.1"/>
    <property type="molecule type" value="Genomic_RNA"/>
</dbReference>
<dbReference type="EMBL" id="MW973101">
    <property type="protein sequence ID" value="QTZ38001.1"/>
    <property type="molecule type" value="Genomic_RNA"/>
</dbReference>
<dbReference type="EMBL" id="MW973102">
    <property type="protein sequence ID" value="QTZ38013.1"/>
    <property type="molecule type" value="Genomic_RNA"/>
</dbReference>
<dbReference type="EMBL" id="MW973103">
    <property type="protein sequence ID" value="QTZ38025.1"/>
    <property type="molecule type" value="Genomic_RNA"/>
</dbReference>
<dbReference type="EMBL" id="MW973104">
    <property type="protein sequence ID" value="QTZ38037.1"/>
    <property type="molecule type" value="Genomic_RNA"/>
</dbReference>
<dbReference type="EMBL" id="MW973105">
    <property type="protein sequence ID" value="QTZ38049.1"/>
    <property type="molecule type" value="Genomic_RNA"/>
</dbReference>
<dbReference type="EMBL" id="MW973106">
    <property type="protein sequence ID" value="QTZ38061.1"/>
    <property type="molecule type" value="Genomic_RNA"/>
</dbReference>
<dbReference type="EMBL" id="MW973107">
    <property type="protein sequence ID" value="QTZ38073.1"/>
    <property type="molecule type" value="Genomic_RNA"/>
</dbReference>
<dbReference type="EMBL" id="MW973108">
    <property type="protein sequence ID" value="QTZ38085.1"/>
    <property type="molecule type" value="Genomic_RNA"/>
</dbReference>
<dbReference type="EMBL" id="MW973109">
    <property type="protein sequence ID" value="QTZ38097.1"/>
    <property type="molecule type" value="Genomic_RNA"/>
</dbReference>
<dbReference type="EMBL" id="MW973110">
    <property type="protein sequence ID" value="QTZ38109.1"/>
    <property type="molecule type" value="Genomic_RNA"/>
</dbReference>
<dbReference type="EMBL" id="MW973111">
    <property type="protein sequence ID" value="QTZ38121.1"/>
    <property type="molecule type" value="Genomic_RNA"/>
</dbReference>
<dbReference type="EMBL" id="MW973112">
    <property type="protein sequence ID" value="QTZ38133.1"/>
    <property type="molecule type" value="Genomic_RNA"/>
</dbReference>
<dbReference type="EMBL" id="MW973113">
    <property type="protein sequence ID" value="QTZ38145.1"/>
    <property type="molecule type" value="Genomic_RNA"/>
</dbReference>
<dbReference type="EMBL" id="MW973114">
    <property type="protein sequence ID" value="QTZ38157.1"/>
    <property type="molecule type" value="Genomic_RNA"/>
</dbReference>
<dbReference type="EMBL" id="MW973115">
    <property type="protein sequence ID" value="QTZ38169.1"/>
    <property type="molecule type" value="Genomic_RNA"/>
</dbReference>
<dbReference type="EMBL" id="MW973116">
    <property type="protein sequence ID" value="QTZ38181.1"/>
    <property type="molecule type" value="Genomic_RNA"/>
</dbReference>
<dbReference type="EMBL" id="MW973117">
    <property type="protein sequence ID" value="QTZ38193.1"/>
    <property type="molecule type" value="Genomic_RNA"/>
</dbReference>
<dbReference type="EMBL" id="MW973118">
    <property type="protein sequence ID" value="QTZ38205.1"/>
    <property type="molecule type" value="Genomic_RNA"/>
</dbReference>
<dbReference type="EMBL" id="MW973119">
    <property type="protein sequence ID" value="QTZ38217.1"/>
    <property type="molecule type" value="Genomic_RNA"/>
</dbReference>
<dbReference type="EMBL" id="MW973120">
    <property type="protein sequence ID" value="QTZ38229.1"/>
    <property type="molecule type" value="Genomic_RNA"/>
</dbReference>
<dbReference type="EMBL" id="MW973121">
    <property type="protein sequence ID" value="QTZ38241.1"/>
    <property type="molecule type" value="Genomic_RNA"/>
</dbReference>
<dbReference type="EMBL" id="MW973122">
    <property type="protein sequence ID" value="QTZ38253.1"/>
    <property type="molecule type" value="Genomic_RNA"/>
</dbReference>
<dbReference type="EMBL" id="MW973123">
    <property type="protein sequence ID" value="QTZ38265.1"/>
    <property type="molecule type" value="Genomic_RNA"/>
</dbReference>
<dbReference type="EMBL" id="MW973124">
    <property type="protein sequence ID" value="QTZ38277.1"/>
    <property type="molecule type" value="Genomic_RNA"/>
</dbReference>
<dbReference type="EMBL" id="MW973125">
    <property type="protein sequence ID" value="QTZ38289.1"/>
    <property type="molecule type" value="Genomic_RNA"/>
</dbReference>
<dbReference type="EMBL" id="MW973126">
    <property type="protein sequence ID" value="QTZ38301.1"/>
    <property type="molecule type" value="Genomic_RNA"/>
</dbReference>
<dbReference type="EMBL" id="MW973127">
    <property type="protein sequence ID" value="QTZ38313.1"/>
    <property type="molecule type" value="Genomic_RNA"/>
</dbReference>
<dbReference type="EMBL" id="MW973128">
    <property type="protein sequence ID" value="QTZ38325.1"/>
    <property type="molecule type" value="Genomic_RNA"/>
</dbReference>
<dbReference type="EMBL" id="MW973129">
    <property type="protein sequence ID" value="QTZ38337.1"/>
    <property type="molecule type" value="Genomic_RNA"/>
</dbReference>
<dbReference type="EMBL" id="MW973130">
    <property type="protein sequence ID" value="QTZ38349.1"/>
    <property type="molecule type" value="Genomic_RNA"/>
</dbReference>
<dbReference type="EMBL" id="MW973131">
    <property type="protein sequence ID" value="QTZ38361.1"/>
    <property type="molecule type" value="Genomic_RNA"/>
</dbReference>
<dbReference type="EMBL" id="MW973132">
    <property type="protein sequence ID" value="QTZ38373.1"/>
    <property type="molecule type" value="Genomic_RNA"/>
</dbReference>
<dbReference type="EMBL" id="MW973133">
    <property type="protein sequence ID" value="QTZ38385.1"/>
    <property type="molecule type" value="Genomic_RNA"/>
</dbReference>
<dbReference type="EMBL" id="MW973134">
    <property type="protein sequence ID" value="QTZ38397.1"/>
    <property type="molecule type" value="Genomic_RNA"/>
</dbReference>
<dbReference type="EMBL" id="MW973135">
    <property type="protein sequence ID" value="QTZ38409.1"/>
    <property type="molecule type" value="Genomic_RNA"/>
</dbReference>
<dbReference type="EMBL" id="MW973136">
    <property type="protein sequence ID" value="QTZ38421.1"/>
    <property type="molecule type" value="Genomic_RNA"/>
</dbReference>
<dbReference type="EMBL" id="MW973137">
    <property type="protein sequence ID" value="QTZ38433.1"/>
    <property type="molecule type" value="Genomic_RNA"/>
</dbReference>
<dbReference type="EMBL" id="MW973138">
    <property type="protein sequence ID" value="QTZ38445.1"/>
    <property type="molecule type" value="Genomic_RNA"/>
</dbReference>
<dbReference type="EMBL" id="MW973139">
    <property type="protein sequence ID" value="QTZ38457.1"/>
    <property type="molecule type" value="Genomic_RNA"/>
</dbReference>
<dbReference type="EMBL" id="MW973140">
    <property type="protein sequence ID" value="QTZ38469.1"/>
    <property type="molecule type" value="Genomic_RNA"/>
</dbReference>
<dbReference type="EMBL" id="MW973141">
    <property type="protein sequence ID" value="QTZ38481.1"/>
    <property type="molecule type" value="Genomic_RNA"/>
</dbReference>
<dbReference type="EMBL" id="MW973142">
    <property type="protein sequence ID" value="QTZ38493.1"/>
    <property type="molecule type" value="Genomic_RNA"/>
</dbReference>
<dbReference type="EMBL" id="MW973143">
    <property type="protein sequence ID" value="QTZ38505.1"/>
    <property type="molecule type" value="Genomic_RNA"/>
</dbReference>
<dbReference type="EMBL" id="MW973144">
    <property type="protein sequence ID" value="QTZ38517.1"/>
    <property type="molecule type" value="Genomic_RNA"/>
</dbReference>
<dbReference type="EMBL" id="MW973145">
    <property type="protein sequence ID" value="QTZ38529.1"/>
    <property type="molecule type" value="Genomic_RNA"/>
</dbReference>
<dbReference type="EMBL" id="MW973146">
    <property type="protein sequence ID" value="QTZ38541.1"/>
    <property type="molecule type" value="Genomic_RNA"/>
</dbReference>
<dbReference type="EMBL" id="MW973147">
    <property type="protein sequence ID" value="QTZ38553.1"/>
    <property type="molecule type" value="Genomic_RNA"/>
</dbReference>
<dbReference type="EMBL" id="MW973148">
    <property type="protein sequence ID" value="QTZ38565.1"/>
    <property type="molecule type" value="Genomic_RNA"/>
</dbReference>
<dbReference type="EMBL" id="MW973149">
    <property type="protein sequence ID" value="QTZ38577.1"/>
    <property type="molecule type" value="Genomic_RNA"/>
</dbReference>
<dbReference type="EMBL" id="MW973150">
    <property type="protein sequence ID" value="QTZ38589.1"/>
    <property type="molecule type" value="Genomic_RNA"/>
</dbReference>
<dbReference type="EMBL" id="MW973151">
    <property type="protein sequence ID" value="QTZ38601.1"/>
    <property type="molecule type" value="Genomic_RNA"/>
</dbReference>
<dbReference type="EMBL" id="MW973152">
    <property type="protein sequence ID" value="QTZ38613.1"/>
    <property type="molecule type" value="Genomic_RNA"/>
</dbReference>
<dbReference type="EMBL" id="MW973153">
    <property type="protein sequence ID" value="QTZ38625.1"/>
    <property type="molecule type" value="Genomic_RNA"/>
</dbReference>
<dbReference type="EMBL" id="MW973154">
    <property type="protein sequence ID" value="QTZ38637.1"/>
    <property type="molecule type" value="Genomic_RNA"/>
</dbReference>
<dbReference type="EMBL" id="MW973155">
    <property type="protein sequence ID" value="QTZ38649.1"/>
    <property type="molecule type" value="Genomic_RNA"/>
</dbReference>
<dbReference type="EMBL" id="MW973156">
    <property type="protein sequence ID" value="QTZ38661.1"/>
    <property type="molecule type" value="Genomic_RNA"/>
</dbReference>
<dbReference type="EMBL" id="MW973157">
    <property type="protein sequence ID" value="QTZ38673.1"/>
    <property type="molecule type" value="Genomic_RNA"/>
</dbReference>
<dbReference type="EMBL" id="MW973158">
    <property type="protein sequence ID" value="QTZ38685.1"/>
    <property type="molecule type" value="Genomic_RNA"/>
</dbReference>
<dbReference type="EMBL" id="MW973159">
    <property type="protein sequence ID" value="QTZ38697.1"/>
    <property type="molecule type" value="Genomic_RNA"/>
</dbReference>
<dbReference type="EMBL" id="MW973160">
    <property type="protein sequence ID" value="QTZ38709.1"/>
    <property type="molecule type" value="Genomic_RNA"/>
</dbReference>
<dbReference type="EMBL" id="MW973161">
    <property type="protein sequence ID" value="QTZ38721.1"/>
    <property type="molecule type" value="Genomic_RNA"/>
</dbReference>
<dbReference type="EMBL" id="MW973162">
    <property type="protein sequence ID" value="QTZ38733.1"/>
    <property type="molecule type" value="Genomic_RNA"/>
</dbReference>
<dbReference type="EMBL" id="MW973163">
    <property type="protein sequence ID" value="QTZ38745.1"/>
    <property type="molecule type" value="Genomic_RNA"/>
</dbReference>
<dbReference type="EMBL" id="MW973164">
    <property type="protein sequence ID" value="QTZ38757.1"/>
    <property type="molecule type" value="Genomic_RNA"/>
</dbReference>
<dbReference type="EMBL" id="MW973165">
    <property type="protein sequence ID" value="QTZ38768.1"/>
    <property type="molecule type" value="Genomic_RNA"/>
</dbReference>
<dbReference type="EMBL" id="MW973166">
    <property type="protein sequence ID" value="QTZ38780.1"/>
    <property type="molecule type" value="Genomic_RNA"/>
</dbReference>
<dbReference type="EMBL" id="MW973167">
    <property type="protein sequence ID" value="QTZ38792.1"/>
    <property type="molecule type" value="Genomic_RNA"/>
</dbReference>
<dbReference type="EMBL" id="MW973168">
    <property type="protein sequence ID" value="QTZ38804.1"/>
    <property type="molecule type" value="Genomic_RNA"/>
</dbReference>
<dbReference type="EMBL" id="MW973169">
    <property type="protein sequence ID" value="QTZ38816.1"/>
    <property type="molecule type" value="Genomic_RNA"/>
</dbReference>
<dbReference type="EMBL" id="MW973170">
    <property type="protein sequence ID" value="QTZ38828.1"/>
    <property type="molecule type" value="Genomic_RNA"/>
</dbReference>
<dbReference type="EMBL" id="MW973171">
    <property type="protein sequence ID" value="QTZ38840.1"/>
    <property type="molecule type" value="Genomic_RNA"/>
</dbReference>
<dbReference type="EMBL" id="MW973172">
    <property type="protein sequence ID" value="QTZ38852.1"/>
    <property type="molecule type" value="Genomic_RNA"/>
</dbReference>
<dbReference type="EMBL" id="MW973173">
    <property type="protein sequence ID" value="QTZ38864.1"/>
    <property type="molecule type" value="Genomic_RNA"/>
</dbReference>
<dbReference type="EMBL" id="MW973175">
    <property type="protein sequence ID" value="QTZ38888.1"/>
    <property type="molecule type" value="Genomic_RNA"/>
</dbReference>
<dbReference type="EMBL" id="MW973176">
    <property type="protein sequence ID" value="QTZ38900.1"/>
    <property type="molecule type" value="Genomic_RNA"/>
</dbReference>
<dbReference type="EMBL" id="MW973177">
    <property type="protein sequence ID" value="QTZ38912.1"/>
    <property type="molecule type" value="Genomic_RNA"/>
</dbReference>
<dbReference type="EMBL" id="MW973179">
    <property type="protein sequence ID" value="QTZ38935.1"/>
    <property type="molecule type" value="Genomic_RNA"/>
</dbReference>
<dbReference type="EMBL" id="MW973180">
    <property type="protein sequence ID" value="QTZ38947.1"/>
    <property type="molecule type" value="Genomic_RNA"/>
</dbReference>
<dbReference type="EMBL" id="MW973181">
    <property type="protein sequence ID" value="QTZ38959.1"/>
    <property type="molecule type" value="Genomic_RNA"/>
</dbReference>
<dbReference type="EMBL" id="MW973182">
    <property type="protein sequence ID" value="QTZ38970.1"/>
    <property type="molecule type" value="Genomic_RNA"/>
</dbReference>
<dbReference type="EMBL" id="MW973183">
    <property type="protein sequence ID" value="QTZ38982.1"/>
    <property type="molecule type" value="Genomic_RNA"/>
</dbReference>
<dbReference type="EMBL" id="MW973184">
    <property type="protein sequence ID" value="QTZ38994.1"/>
    <property type="molecule type" value="Genomic_RNA"/>
</dbReference>
<dbReference type="EMBL" id="MW973185">
    <property type="protein sequence ID" value="QTZ39006.1"/>
    <property type="molecule type" value="Genomic_RNA"/>
</dbReference>
<dbReference type="EMBL" id="MW973186">
    <property type="protein sequence ID" value="QTZ39018.1"/>
    <property type="molecule type" value="Genomic_RNA"/>
</dbReference>
<dbReference type="EMBL" id="MW973187">
    <property type="protein sequence ID" value="QTZ39030.1"/>
    <property type="molecule type" value="Genomic_RNA"/>
</dbReference>
<dbReference type="EMBL" id="MW973188">
    <property type="protein sequence ID" value="QTZ39042.1"/>
    <property type="molecule type" value="Genomic_RNA"/>
</dbReference>
<dbReference type="EMBL" id="MW973189">
    <property type="protein sequence ID" value="QTZ39054.1"/>
    <property type="molecule type" value="Genomic_RNA"/>
</dbReference>
<dbReference type="EMBL" id="MW973190">
    <property type="protein sequence ID" value="QTZ39066.1"/>
    <property type="molecule type" value="Genomic_RNA"/>
</dbReference>
<dbReference type="EMBL" id="MW973191">
    <property type="protein sequence ID" value="QTZ39078.1"/>
    <property type="molecule type" value="Genomic_RNA"/>
</dbReference>
<dbReference type="EMBL" id="MW973192">
    <property type="protein sequence ID" value="QTZ39090.1"/>
    <property type="molecule type" value="Genomic_RNA"/>
</dbReference>
<dbReference type="EMBL" id="MW973193">
    <property type="protein sequence ID" value="QTZ39102.1"/>
    <property type="molecule type" value="Genomic_RNA"/>
</dbReference>
<dbReference type="EMBL" id="MW973194">
    <property type="protein sequence ID" value="QTZ39114.1"/>
    <property type="molecule type" value="Genomic_RNA"/>
</dbReference>
<dbReference type="EMBL" id="MW973196">
    <property type="protein sequence ID" value="QTZ39138.1"/>
    <property type="molecule type" value="Genomic_RNA"/>
</dbReference>
<dbReference type="EMBL" id="MW973197">
    <property type="protein sequence ID" value="QTZ39150.1"/>
    <property type="molecule type" value="Genomic_RNA"/>
</dbReference>
<dbReference type="EMBL" id="MW973198">
    <property type="protein sequence ID" value="QTZ39162.1"/>
    <property type="molecule type" value="Genomic_RNA"/>
</dbReference>
<dbReference type="EMBL" id="MW973199">
    <property type="protein sequence ID" value="QTZ39174.1"/>
    <property type="molecule type" value="Genomic_RNA"/>
</dbReference>
<dbReference type="EMBL" id="MW973200">
    <property type="protein sequence ID" value="QTZ39186.1"/>
    <property type="molecule type" value="Genomic_RNA"/>
</dbReference>
<dbReference type="EMBL" id="MW973201">
    <property type="protein sequence ID" value="QTZ39198.1"/>
    <property type="molecule type" value="Genomic_RNA"/>
</dbReference>
<dbReference type="EMBL" id="MW973202">
    <property type="protein sequence ID" value="QTZ39210.1"/>
    <property type="molecule type" value="Genomic_RNA"/>
</dbReference>
<dbReference type="EMBL" id="MW973203">
    <property type="protein sequence ID" value="QTZ39221.1"/>
    <property type="molecule type" value="Genomic_RNA"/>
</dbReference>
<dbReference type="EMBL" id="MW973204">
    <property type="protein sequence ID" value="QTZ39233.1"/>
    <property type="molecule type" value="Genomic_RNA"/>
</dbReference>
<dbReference type="EMBL" id="MW973205">
    <property type="protein sequence ID" value="QTZ39245.1"/>
    <property type="molecule type" value="Genomic_RNA"/>
</dbReference>
<dbReference type="EMBL" id="MW973206">
    <property type="protein sequence ID" value="QTZ39257.1"/>
    <property type="molecule type" value="Genomic_RNA"/>
</dbReference>
<dbReference type="EMBL" id="MW973208">
    <property type="protein sequence ID" value="QTZ39281.1"/>
    <property type="molecule type" value="Genomic_RNA"/>
</dbReference>
<dbReference type="EMBL" id="MW973209">
    <property type="protein sequence ID" value="QTZ39293.1"/>
    <property type="molecule type" value="Genomic_RNA"/>
</dbReference>
<dbReference type="EMBL" id="MW973210">
    <property type="protein sequence ID" value="QTZ39305.1"/>
    <property type="molecule type" value="Genomic_RNA"/>
</dbReference>
<dbReference type="EMBL" id="MW973211">
    <property type="protein sequence ID" value="QTZ39317.1"/>
    <property type="molecule type" value="Genomic_RNA"/>
</dbReference>
<dbReference type="EMBL" id="MW973213">
    <property type="protein sequence ID" value="QTZ39341.1"/>
    <property type="molecule type" value="Genomic_RNA"/>
</dbReference>
<dbReference type="EMBL" id="MW973214">
    <property type="protein sequence ID" value="QTZ39353.1"/>
    <property type="molecule type" value="Genomic_RNA"/>
</dbReference>
<dbReference type="EMBL" id="MW973215">
    <property type="protein sequence ID" value="QTZ39365.1"/>
    <property type="molecule type" value="Genomic_RNA"/>
</dbReference>
<dbReference type="EMBL" id="MW973216">
    <property type="protein sequence ID" value="QTZ39377.1"/>
    <property type="molecule type" value="Genomic_RNA"/>
</dbReference>
<dbReference type="EMBL" id="MW973217">
    <property type="protein sequence ID" value="QTZ39389.1"/>
    <property type="molecule type" value="Genomic_RNA"/>
</dbReference>
<dbReference type="EMBL" id="MW973218">
    <property type="protein sequence ID" value="QTZ39401.1"/>
    <property type="molecule type" value="Genomic_RNA"/>
</dbReference>
<dbReference type="EMBL" id="MW973219">
    <property type="protein sequence ID" value="QTZ39413.1"/>
    <property type="molecule type" value="Genomic_RNA"/>
</dbReference>
<dbReference type="EMBL" id="MW973220">
    <property type="protein sequence ID" value="QTZ39425.1"/>
    <property type="molecule type" value="Genomic_RNA"/>
</dbReference>
<dbReference type="EMBL" id="MW973221">
    <property type="protein sequence ID" value="QTZ39437.1"/>
    <property type="molecule type" value="Genomic_RNA"/>
</dbReference>
<dbReference type="EMBL" id="MW973222">
    <property type="protein sequence ID" value="QTZ39449.1"/>
    <property type="molecule type" value="Genomic_RNA"/>
</dbReference>
<dbReference type="EMBL" id="MW973223">
    <property type="protein sequence ID" value="QTZ39461.1"/>
    <property type="molecule type" value="Genomic_RNA"/>
</dbReference>
<dbReference type="EMBL" id="MW973224">
    <property type="protein sequence ID" value="QTZ39473.1"/>
    <property type="molecule type" value="Genomic_RNA"/>
</dbReference>
<dbReference type="EMBL" id="MW973225">
    <property type="protein sequence ID" value="QTZ39485.1"/>
    <property type="molecule type" value="Genomic_RNA"/>
</dbReference>
<dbReference type="EMBL" id="MW973226">
    <property type="protein sequence ID" value="QTZ39497.1"/>
    <property type="molecule type" value="Genomic_RNA"/>
</dbReference>
<dbReference type="EMBL" id="MW973227">
    <property type="protein sequence ID" value="QTZ39509.1"/>
    <property type="molecule type" value="Genomic_RNA"/>
</dbReference>
<dbReference type="EMBL" id="MW973228">
    <property type="protein sequence ID" value="QTZ39521.1"/>
    <property type="molecule type" value="Genomic_RNA"/>
</dbReference>
<dbReference type="EMBL" id="MW973229">
    <property type="protein sequence ID" value="QTZ39533.1"/>
    <property type="molecule type" value="Genomic_RNA"/>
</dbReference>
<dbReference type="EMBL" id="MW973230">
    <property type="protein sequence ID" value="QTZ39545.1"/>
    <property type="molecule type" value="Genomic_RNA"/>
</dbReference>
<dbReference type="EMBL" id="MW973231">
    <property type="protein sequence ID" value="QTZ39557.1"/>
    <property type="molecule type" value="Genomic_RNA"/>
</dbReference>
<dbReference type="EMBL" id="MW973232">
    <property type="protein sequence ID" value="QTZ39569.1"/>
    <property type="molecule type" value="Genomic_RNA"/>
</dbReference>
<dbReference type="EMBL" id="MW973233">
    <property type="protein sequence ID" value="QTZ39581.1"/>
    <property type="molecule type" value="Genomic_RNA"/>
</dbReference>
<dbReference type="EMBL" id="MW973234">
    <property type="protein sequence ID" value="QTZ39593.1"/>
    <property type="molecule type" value="Genomic_RNA"/>
</dbReference>
<dbReference type="EMBL" id="MW973235">
    <property type="protein sequence ID" value="QTZ39605.1"/>
    <property type="molecule type" value="Genomic_RNA"/>
</dbReference>
<dbReference type="EMBL" id="MW973236">
    <property type="protein sequence ID" value="QTZ39617.1"/>
    <property type="molecule type" value="Genomic_RNA"/>
</dbReference>
<dbReference type="EMBL" id="MW973237">
    <property type="protein sequence ID" value="QTZ39629.1"/>
    <property type="molecule type" value="Genomic_RNA"/>
</dbReference>
<dbReference type="EMBL" id="MW973238">
    <property type="protein sequence ID" value="QTZ39641.1"/>
    <property type="molecule type" value="Genomic_RNA"/>
</dbReference>
<dbReference type="EMBL" id="MW973239">
    <property type="protein sequence ID" value="QTZ39653.1"/>
    <property type="molecule type" value="Genomic_RNA"/>
</dbReference>
<dbReference type="EMBL" id="MW973240">
    <property type="protein sequence ID" value="QTZ39665.1"/>
    <property type="molecule type" value="Genomic_RNA"/>
</dbReference>
<dbReference type="EMBL" id="MW973241">
    <property type="protein sequence ID" value="QTZ39677.1"/>
    <property type="molecule type" value="Genomic_RNA"/>
</dbReference>
<dbReference type="EMBL" id="MW973242">
    <property type="protein sequence ID" value="QTZ39689.1"/>
    <property type="molecule type" value="Genomic_RNA"/>
</dbReference>
<dbReference type="EMBL" id="MW973243">
    <property type="protein sequence ID" value="QTZ39701.1"/>
    <property type="molecule type" value="Genomic_RNA"/>
</dbReference>
<dbReference type="EMBL" id="MW973244">
    <property type="protein sequence ID" value="QTZ39713.1"/>
    <property type="molecule type" value="Genomic_RNA"/>
</dbReference>
<dbReference type="EMBL" id="MW973245">
    <property type="protein sequence ID" value="QTZ39725.1"/>
    <property type="molecule type" value="Genomic_RNA"/>
</dbReference>
<dbReference type="EMBL" id="MW973246">
    <property type="protein sequence ID" value="QTZ39737.1"/>
    <property type="molecule type" value="Genomic_RNA"/>
</dbReference>
<dbReference type="EMBL" id="MW973247">
    <property type="protein sequence ID" value="QTZ39749.1"/>
    <property type="molecule type" value="Genomic_RNA"/>
</dbReference>
<dbReference type="EMBL" id="MW973248">
    <property type="protein sequence ID" value="QTZ39761.1"/>
    <property type="molecule type" value="Genomic_RNA"/>
</dbReference>
<dbReference type="EMBL" id="MW973249">
    <property type="protein sequence ID" value="QTZ39773.1"/>
    <property type="molecule type" value="Genomic_RNA"/>
</dbReference>
<dbReference type="EMBL" id="MW973250">
    <property type="protein sequence ID" value="QTZ39785.1"/>
    <property type="molecule type" value="Genomic_RNA"/>
</dbReference>
<dbReference type="EMBL" id="MW973251">
    <property type="protein sequence ID" value="QTZ39797.1"/>
    <property type="molecule type" value="Genomic_RNA"/>
</dbReference>
<dbReference type="EMBL" id="MW973252">
    <property type="protein sequence ID" value="QTZ39809.1"/>
    <property type="molecule type" value="Genomic_RNA"/>
</dbReference>
<dbReference type="EMBL" id="MW973253">
    <property type="protein sequence ID" value="QTZ39821.1"/>
    <property type="molecule type" value="Genomic_RNA"/>
</dbReference>
<dbReference type="EMBL" id="MW973254">
    <property type="protein sequence ID" value="QTZ39833.1"/>
    <property type="molecule type" value="Genomic_RNA"/>
</dbReference>
<dbReference type="EMBL" id="MW973255">
    <property type="protein sequence ID" value="QTZ39845.1"/>
    <property type="molecule type" value="Genomic_RNA"/>
</dbReference>
<dbReference type="EMBL" id="MW973256">
    <property type="protein sequence ID" value="QTZ39857.1"/>
    <property type="molecule type" value="Genomic_RNA"/>
</dbReference>
<dbReference type="EMBL" id="MW973257">
    <property type="protein sequence ID" value="QTZ39869.1"/>
    <property type="molecule type" value="Genomic_RNA"/>
</dbReference>
<dbReference type="EMBL" id="MW973258">
    <property type="protein sequence ID" value="QTZ39881.1"/>
    <property type="molecule type" value="Genomic_RNA"/>
</dbReference>
<dbReference type="EMBL" id="MW973259">
    <property type="protein sequence ID" value="QTZ39893.1"/>
    <property type="molecule type" value="Genomic_RNA"/>
</dbReference>
<dbReference type="EMBL" id="MW973260">
    <property type="protein sequence ID" value="QTZ39905.1"/>
    <property type="molecule type" value="Genomic_RNA"/>
</dbReference>
<dbReference type="EMBL" id="MW973261">
    <property type="protein sequence ID" value="QTZ39917.1"/>
    <property type="molecule type" value="Genomic_RNA"/>
</dbReference>
<dbReference type="EMBL" id="MW973262">
    <property type="protein sequence ID" value="QTZ39929.1"/>
    <property type="molecule type" value="Genomic_RNA"/>
</dbReference>
<dbReference type="EMBL" id="MW973263">
    <property type="protein sequence ID" value="QTZ39941.1"/>
    <property type="molecule type" value="Genomic_RNA"/>
</dbReference>
<dbReference type="EMBL" id="MW973264">
    <property type="protein sequence ID" value="QTZ39953.1"/>
    <property type="molecule type" value="Genomic_RNA"/>
</dbReference>
<dbReference type="EMBL" id="MW973265">
    <property type="protein sequence ID" value="QTZ39965.1"/>
    <property type="molecule type" value="Genomic_RNA"/>
</dbReference>
<dbReference type="EMBL" id="MW973266">
    <property type="protein sequence ID" value="QTZ39977.1"/>
    <property type="molecule type" value="Genomic_RNA"/>
</dbReference>
<dbReference type="EMBL" id="MW973267">
    <property type="protein sequence ID" value="QTZ39989.1"/>
    <property type="molecule type" value="Genomic_RNA"/>
</dbReference>
<dbReference type="EMBL" id="MW973268">
    <property type="protein sequence ID" value="QTZ40001.1"/>
    <property type="molecule type" value="Genomic_RNA"/>
</dbReference>
<dbReference type="EMBL" id="MW973269">
    <property type="protein sequence ID" value="QTZ40013.1"/>
    <property type="molecule type" value="Genomic_RNA"/>
</dbReference>
<dbReference type="EMBL" id="MW973270">
    <property type="protein sequence ID" value="QTZ40024.1"/>
    <property type="molecule type" value="Genomic_RNA"/>
</dbReference>
<dbReference type="EMBL" id="MW973271">
    <property type="protein sequence ID" value="QTZ40036.1"/>
    <property type="molecule type" value="Genomic_RNA"/>
</dbReference>
<dbReference type="EMBL" id="MW973272">
    <property type="protein sequence ID" value="QTZ40048.1"/>
    <property type="molecule type" value="Genomic_RNA"/>
</dbReference>
<dbReference type="EMBL" id="MW973273">
    <property type="protein sequence ID" value="QTZ40060.1"/>
    <property type="molecule type" value="Genomic_RNA"/>
</dbReference>
<dbReference type="EMBL" id="MW973274">
    <property type="protein sequence ID" value="QTZ40072.1"/>
    <property type="molecule type" value="Genomic_RNA"/>
</dbReference>
<dbReference type="EMBL" id="MW973275">
    <property type="protein sequence ID" value="QTZ40084.1"/>
    <property type="molecule type" value="Genomic_RNA"/>
</dbReference>
<dbReference type="EMBL" id="MW973276">
    <property type="protein sequence ID" value="QTZ40096.1"/>
    <property type="molecule type" value="Genomic_RNA"/>
</dbReference>
<dbReference type="EMBL" id="MW973277">
    <property type="protein sequence ID" value="QTZ40108.1"/>
    <property type="molecule type" value="Genomic_RNA"/>
</dbReference>
<dbReference type="EMBL" id="MW973278">
    <property type="protein sequence ID" value="QTZ40120.1"/>
    <property type="molecule type" value="Genomic_RNA"/>
</dbReference>
<dbReference type="EMBL" id="MW973279">
    <property type="protein sequence ID" value="QTZ40132.1"/>
    <property type="molecule type" value="Genomic_RNA"/>
</dbReference>
<dbReference type="EMBL" id="MW973280">
    <property type="protein sequence ID" value="QTZ40144.1"/>
    <property type="molecule type" value="Genomic_RNA"/>
</dbReference>
<dbReference type="EMBL" id="MW973282">
    <property type="protein sequence ID" value="QTZ40168.1"/>
    <property type="molecule type" value="Genomic_RNA"/>
</dbReference>
<dbReference type="EMBL" id="MW973283">
    <property type="protein sequence ID" value="QTZ40180.1"/>
    <property type="molecule type" value="Genomic_RNA"/>
</dbReference>
<dbReference type="EMBL" id="MW973285">
    <property type="protein sequence ID" value="QTZ40204.1"/>
    <property type="molecule type" value="Genomic_RNA"/>
</dbReference>
<dbReference type="EMBL" id="MW973287">
    <property type="protein sequence ID" value="QTZ40228.1"/>
    <property type="molecule type" value="Genomic_RNA"/>
</dbReference>
<dbReference type="EMBL" id="MW973288">
    <property type="protein sequence ID" value="QTZ40240.1"/>
    <property type="molecule type" value="Genomic_RNA"/>
</dbReference>
<dbReference type="EMBL" id="MW973289">
    <property type="protein sequence ID" value="QTZ40252.1"/>
    <property type="molecule type" value="Genomic_RNA"/>
</dbReference>
<dbReference type="EMBL" id="MW973290">
    <property type="protein sequence ID" value="QTZ40264.1"/>
    <property type="molecule type" value="Genomic_RNA"/>
</dbReference>
<dbReference type="EMBL" id="MW973291">
    <property type="protein sequence ID" value="QTZ40276.1"/>
    <property type="molecule type" value="Genomic_RNA"/>
</dbReference>
<dbReference type="EMBL" id="MW973292">
    <property type="protein sequence ID" value="QTZ40288.1"/>
    <property type="molecule type" value="Genomic_RNA"/>
</dbReference>
<dbReference type="EMBL" id="MW973293">
    <property type="protein sequence ID" value="QTZ40300.1"/>
    <property type="molecule type" value="Genomic_RNA"/>
</dbReference>
<dbReference type="EMBL" id="MW973294">
    <property type="protein sequence ID" value="QTZ40312.1"/>
    <property type="molecule type" value="Genomic_RNA"/>
</dbReference>
<dbReference type="EMBL" id="MW973295">
    <property type="protein sequence ID" value="QTZ40324.1"/>
    <property type="molecule type" value="Genomic_RNA"/>
</dbReference>
<dbReference type="EMBL" id="MW973296">
    <property type="protein sequence ID" value="QTZ40336.1"/>
    <property type="molecule type" value="Genomic_RNA"/>
</dbReference>
<dbReference type="EMBL" id="MW973297">
    <property type="protein sequence ID" value="QTZ40348.1"/>
    <property type="molecule type" value="Genomic_RNA"/>
</dbReference>
<dbReference type="EMBL" id="MW973298">
    <property type="protein sequence ID" value="QTZ40360.1"/>
    <property type="molecule type" value="Genomic_RNA"/>
</dbReference>
<dbReference type="EMBL" id="MW973299">
    <property type="protein sequence ID" value="QTZ40372.1"/>
    <property type="molecule type" value="Genomic_RNA"/>
</dbReference>
<dbReference type="EMBL" id="MW973300">
    <property type="protein sequence ID" value="QTZ40384.1"/>
    <property type="molecule type" value="Genomic_RNA"/>
</dbReference>
<dbReference type="EMBL" id="MW973301">
    <property type="protein sequence ID" value="QTZ40396.1"/>
    <property type="molecule type" value="Genomic_RNA"/>
</dbReference>
<dbReference type="EMBL" id="MW973302">
    <property type="protein sequence ID" value="QTZ40408.1"/>
    <property type="molecule type" value="Genomic_RNA"/>
</dbReference>
<dbReference type="EMBL" id="MW973303">
    <property type="protein sequence ID" value="QTZ40420.1"/>
    <property type="molecule type" value="Genomic_RNA"/>
</dbReference>
<dbReference type="EMBL" id="MW973304">
    <property type="protein sequence ID" value="QTZ40432.1"/>
    <property type="molecule type" value="Genomic_RNA"/>
</dbReference>
<dbReference type="EMBL" id="MW973305">
    <property type="protein sequence ID" value="QTZ40444.1"/>
    <property type="molecule type" value="Genomic_RNA"/>
</dbReference>
<dbReference type="EMBL" id="MW973306">
    <property type="protein sequence ID" value="QTZ40456.1"/>
    <property type="molecule type" value="Genomic_RNA"/>
</dbReference>
<dbReference type="EMBL" id="MW973307">
    <property type="protein sequence ID" value="QTZ40468.1"/>
    <property type="molecule type" value="Genomic_RNA"/>
</dbReference>
<dbReference type="EMBL" id="MW973308">
    <property type="protein sequence ID" value="QTZ40480.1"/>
    <property type="molecule type" value="Genomic_RNA"/>
</dbReference>
<dbReference type="EMBL" id="MW973309">
    <property type="protein sequence ID" value="QTZ40492.1"/>
    <property type="molecule type" value="Genomic_RNA"/>
</dbReference>
<dbReference type="EMBL" id="MW973310">
    <property type="protein sequence ID" value="QTZ40504.1"/>
    <property type="molecule type" value="Genomic_RNA"/>
</dbReference>
<dbReference type="EMBL" id="MW973311">
    <property type="protein sequence ID" value="QTZ40516.1"/>
    <property type="molecule type" value="Genomic_RNA"/>
</dbReference>
<dbReference type="EMBL" id="MW973312">
    <property type="protein sequence ID" value="QTZ40528.1"/>
    <property type="molecule type" value="Genomic_RNA"/>
</dbReference>
<dbReference type="EMBL" id="MW973313">
    <property type="protein sequence ID" value="QTZ40540.1"/>
    <property type="molecule type" value="Genomic_RNA"/>
</dbReference>
<dbReference type="EMBL" id="MW973314">
    <property type="protein sequence ID" value="QTZ40552.1"/>
    <property type="molecule type" value="Genomic_RNA"/>
</dbReference>
<dbReference type="EMBL" id="MW973315">
    <property type="protein sequence ID" value="QTZ40564.1"/>
    <property type="molecule type" value="Genomic_RNA"/>
</dbReference>
<dbReference type="EMBL" id="MW973316">
    <property type="protein sequence ID" value="QTZ40576.1"/>
    <property type="molecule type" value="Genomic_RNA"/>
</dbReference>
<dbReference type="EMBL" id="MW973317">
    <property type="protein sequence ID" value="QTZ40588.1"/>
    <property type="molecule type" value="Genomic_RNA"/>
</dbReference>
<dbReference type="EMBL" id="MW973318">
    <property type="protein sequence ID" value="QTZ40600.1"/>
    <property type="molecule type" value="Genomic_RNA"/>
</dbReference>
<dbReference type="EMBL" id="MW973319">
    <property type="protein sequence ID" value="QTZ40612.1"/>
    <property type="molecule type" value="Genomic_RNA"/>
</dbReference>
<dbReference type="EMBL" id="MW973320">
    <property type="protein sequence ID" value="QTZ40624.1"/>
    <property type="molecule type" value="Genomic_RNA"/>
</dbReference>
<dbReference type="EMBL" id="MW973321">
    <property type="protein sequence ID" value="QTZ40636.1"/>
    <property type="molecule type" value="Genomic_RNA"/>
</dbReference>
<dbReference type="EMBL" id="MW973322">
    <property type="protein sequence ID" value="QTZ40648.1"/>
    <property type="molecule type" value="Genomic_RNA"/>
</dbReference>
<dbReference type="EMBL" id="MW973323">
    <property type="protein sequence ID" value="QTZ40660.1"/>
    <property type="molecule type" value="Genomic_RNA"/>
</dbReference>
<dbReference type="EMBL" id="MW973324">
    <property type="protein sequence ID" value="QTZ40672.1"/>
    <property type="molecule type" value="Genomic_RNA"/>
</dbReference>
<dbReference type="EMBL" id="MW973325">
    <property type="protein sequence ID" value="QTZ40684.1"/>
    <property type="molecule type" value="Genomic_RNA"/>
</dbReference>
<dbReference type="EMBL" id="MW973326">
    <property type="protein sequence ID" value="QTZ40696.1"/>
    <property type="molecule type" value="Genomic_RNA"/>
</dbReference>
<dbReference type="EMBL" id="MW973327">
    <property type="protein sequence ID" value="QTZ40708.1"/>
    <property type="molecule type" value="Genomic_RNA"/>
</dbReference>
<dbReference type="EMBL" id="MW973329">
    <property type="protein sequence ID" value="QTZ40732.1"/>
    <property type="molecule type" value="Genomic_RNA"/>
</dbReference>
<dbReference type="EMBL" id="MW973330">
    <property type="protein sequence ID" value="QTZ40744.1"/>
    <property type="molecule type" value="Genomic_RNA"/>
</dbReference>
<dbReference type="EMBL" id="MW973331">
    <property type="protein sequence ID" value="QTZ40756.1"/>
    <property type="molecule type" value="Genomic_RNA"/>
</dbReference>
<dbReference type="EMBL" id="MW973332">
    <property type="protein sequence ID" value="QTZ40768.1"/>
    <property type="molecule type" value="Genomic_RNA"/>
</dbReference>
<dbReference type="EMBL" id="MW973333">
    <property type="protein sequence ID" value="QTZ40780.1"/>
    <property type="molecule type" value="Genomic_RNA"/>
</dbReference>
<dbReference type="EMBL" id="MW973334">
    <property type="protein sequence ID" value="QTZ40792.1"/>
    <property type="molecule type" value="Genomic_RNA"/>
</dbReference>
<dbReference type="EMBL" id="MW973335">
    <property type="protein sequence ID" value="QTZ40804.1"/>
    <property type="molecule type" value="Genomic_RNA"/>
</dbReference>
<dbReference type="EMBL" id="MW973336">
    <property type="protein sequence ID" value="QTZ40816.1"/>
    <property type="molecule type" value="Genomic_RNA"/>
</dbReference>
<dbReference type="EMBL" id="MW973337">
    <property type="protein sequence ID" value="QTZ40828.1"/>
    <property type="molecule type" value="Genomic_RNA"/>
</dbReference>
<dbReference type="EMBL" id="MW973338">
    <property type="protein sequence ID" value="QTZ40840.1"/>
    <property type="molecule type" value="Genomic_RNA"/>
</dbReference>
<dbReference type="EMBL" id="MW973339">
    <property type="protein sequence ID" value="QTZ40852.1"/>
    <property type="molecule type" value="Genomic_RNA"/>
</dbReference>
<dbReference type="EMBL" id="MW973340">
    <property type="protein sequence ID" value="QTZ40864.1"/>
    <property type="molecule type" value="Genomic_RNA"/>
</dbReference>
<dbReference type="EMBL" id="MW973341">
    <property type="protein sequence ID" value="QTZ40876.1"/>
    <property type="molecule type" value="Genomic_RNA"/>
</dbReference>
<dbReference type="EMBL" id="MW973342">
    <property type="protein sequence ID" value="QTZ40888.1"/>
    <property type="molecule type" value="Genomic_RNA"/>
</dbReference>
<dbReference type="EMBL" id="MW973343">
    <property type="protein sequence ID" value="QTZ40900.1"/>
    <property type="molecule type" value="Genomic_RNA"/>
</dbReference>
<dbReference type="EMBL" id="MW973344">
    <property type="protein sequence ID" value="QTZ40912.1"/>
    <property type="molecule type" value="Genomic_RNA"/>
</dbReference>
<dbReference type="EMBL" id="MW973345">
    <property type="protein sequence ID" value="QTZ40924.1"/>
    <property type="molecule type" value="Genomic_RNA"/>
</dbReference>
<dbReference type="EMBL" id="MW973346">
    <property type="protein sequence ID" value="QTZ40936.1"/>
    <property type="molecule type" value="Genomic_RNA"/>
</dbReference>
<dbReference type="EMBL" id="MW973347">
    <property type="protein sequence ID" value="QTZ40948.1"/>
    <property type="molecule type" value="Genomic_RNA"/>
</dbReference>
<dbReference type="EMBL" id="MW973348">
    <property type="protein sequence ID" value="QTZ40960.1"/>
    <property type="molecule type" value="Genomic_RNA"/>
</dbReference>
<dbReference type="EMBL" id="MW973349">
    <property type="protein sequence ID" value="QTZ40972.1"/>
    <property type="molecule type" value="Genomic_RNA"/>
</dbReference>
<dbReference type="EMBL" id="MW973350">
    <property type="protein sequence ID" value="QTZ40984.1"/>
    <property type="molecule type" value="Genomic_RNA"/>
</dbReference>
<dbReference type="EMBL" id="MW973351">
    <property type="protein sequence ID" value="QTZ40996.1"/>
    <property type="molecule type" value="Genomic_RNA"/>
</dbReference>
<dbReference type="EMBL" id="MW973352">
    <property type="protein sequence ID" value="QTZ41008.1"/>
    <property type="molecule type" value="Genomic_RNA"/>
</dbReference>
<dbReference type="EMBL" id="MW973353">
    <property type="protein sequence ID" value="QTZ41020.1"/>
    <property type="molecule type" value="Genomic_RNA"/>
</dbReference>
<dbReference type="EMBL" id="MW973354">
    <property type="protein sequence ID" value="QTZ41032.1"/>
    <property type="molecule type" value="Genomic_RNA"/>
</dbReference>
<dbReference type="EMBL" id="MW973355">
    <property type="protein sequence ID" value="QTZ41044.1"/>
    <property type="molecule type" value="Genomic_RNA"/>
</dbReference>
<dbReference type="EMBL" id="MW973356">
    <property type="protein sequence ID" value="QTZ41055.1"/>
    <property type="molecule type" value="Genomic_RNA"/>
</dbReference>
<dbReference type="EMBL" id="MW973357">
    <property type="protein sequence ID" value="QTZ41067.1"/>
    <property type="molecule type" value="Genomic_RNA"/>
</dbReference>
<dbReference type="EMBL" id="MW973358">
    <property type="protein sequence ID" value="QTZ41079.1"/>
    <property type="molecule type" value="Genomic_RNA"/>
</dbReference>
<dbReference type="EMBL" id="MW973359">
    <property type="protein sequence ID" value="QTZ41091.1"/>
    <property type="molecule type" value="Genomic_RNA"/>
</dbReference>
<dbReference type="EMBL" id="MW973360">
    <property type="protein sequence ID" value="QTZ41103.1"/>
    <property type="molecule type" value="Genomic_RNA"/>
</dbReference>
<dbReference type="EMBL" id="MW973361">
    <property type="protein sequence ID" value="QTZ41115.1"/>
    <property type="molecule type" value="Genomic_RNA"/>
</dbReference>
<dbReference type="EMBL" id="MW973362">
    <property type="protein sequence ID" value="QTZ41127.1"/>
    <property type="molecule type" value="Genomic_RNA"/>
</dbReference>
<dbReference type="EMBL" id="MW973363">
    <property type="protein sequence ID" value="QTZ41139.1"/>
    <property type="molecule type" value="Genomic_RNA"/>
</dbReference>
<dbReference type="EMBL" id="MW973364">
    <property type="protein sequence ID" value="QTZ41151.1"/>
    <property type="molecule type" value="Genomic_RNA"/>
</dbReference>
<dbReference type="EMBL" id="MW973365">
    <property type="protein sequence ID" value="QTZ41163.1"/>
    <property type="molecule type" value="Genomic_RNA"/>
</dbReference>
<dbReference type="EMBL" id="MW973366">
    <property type="protein sequence ID" value="QTZ41175.1"/>
    <property type="molecule type" value="Genomic_RNA"/>
</dbReference>
<dbReference type="EMBL" id="MW973367">
    <property type="protein sequence ID" value="QTZ41187.1"/>
    <property type="molecule type" value="Genomic_RNA"/>
</dbReference>
<dbReference type="EMBL" id="MW973368">
    <property type="protein sequence ID" value="QTZ41199.1"/>
    <property type="molecule type" value="Genomic_RNA"/>
</dbReference>
<dbReference type="EMBL" id="MW973369">
    <property type="protein sequence ID" value="QTZ41211.1"/>
    <property type="molecule type" value="Genomic_RNA"/>
</dbReference>
<dbReference type="EMBL" id="MW973370">
    <property type="protein sequence ID" value="QTZ41223.1"/>
    <property type="molecule type" value="Genomic_RNA"/>
</dbReference>
<dbReference type="EMBL" id="MW973371">
    <property type="protein sequence ID" value="QTZ41235.1"/>
    <property type="molecule type" value="Genomic_RNA"/>
</dbReference>
<dbReference type="EMBL" id="MW973372">
    <property type="protein sequence ID" value="QTZ41247.1"/>
    <property type="molecule type" value="Genomic_RNA"/>
</dbReference>
<dbReference type="EMBL" id="MW973373">
    <property type="protein sequence ID" value="QTZ41259.1"/>
    <property type="molecule type" value="Genomic_RNA"/>
</dbReference>
<dbReference type="EMBL" id="MW973374">
    <property type="protein sequence ID" value="QTZ41271.1"/>
    <property type="molecule type" value="Genomic_RNA"/>
</dbReference>
<dbReference type="EMBL" id="MW973375">
    <property type="protein sequence ID" value="QTZ41283.1"/>
    <property type="molecule type" value="Genomic_RNA"/>
</dbReference>
<dbReference type="EMBL" id="MW973376">
    <property type="protein sequence ID" value="QTZ41295.1"/>
    <property type="molecule type" value="Genomic_RNA"/>
</dbReference>
<dbReference type="EMBL" id="MW973377">
    <property type="protein sequence ID" value="QTZ41307.1"/>
    <property type="molecule type" value="Genomic_RNA"/>
</dbReference>
<dbReference type="EMBL" id="MW973378">
    <property type="protein sequence ID" value="QTZ41319.1"/>
    <property type="molecule type" value="Genomic_RNA"/>
</dbReference>
<dbReference type="EMBL" id="MW973379">
    <property type="protein sequence ID" value="QTZ41331.1"/>
    <property type="molecule type" value="Genomic_RNA"/>
</dbReference>
<dbReference type="EMBL" id="MW973380">
    <property type="protein sequence ID" value="QTZ41343.1"/>
    <property type="molecule type" value="Genomic_RNA"/>
</dbReference>
<dbReference type="EMBL" id="MW973381">
    <property type="protein sequence ID" value="QTZ41355.1"/>
    <property type="molecule type" value="Genomic_RNA"/>
</dbReference>
<dbReference type="EMBL" id="MW973382">
    <property type="protein sequence ID" value="QTZ41367.1"/>
    <property type="molecule type" value="Genomic_RNA"/>
</dbReference>
<dbReference type="EMBL" id="MW973383">
    <property type="protein sequence ID" value="QTZ41379.1"/>
    <property type="molecule type" value="Genomic_RNA"/>
</dbReference>
<dbReference type="EMBL" id="MW973384">
    <property type="protein sequence ID" value="QTZ41391.1"/>
    <property type="molecule type" value="Genomic_RNA"/>
</dbReference>
<dbReference type="EMBL" id="MW973385">
    <property type="protein sequence ID" value="QTZ41403.1"/>
    <property type="molecule type" value="Genomic_RNA"/>
</dbReference>
<dbReference type="EMBL" id="MW973386">
    <property type="protein sequence ID" value="QTZ41415.1"/>
    <property type="molecule type" value="Genomic_RNA"/>
</dbReference>
<dbReference type="EMBL" id="MW973387">
    <property type="protein sequence ID" value="QTZ41427.1"/>
    <property type="molecule type" value="Genomic_RNA"/>
</dbReference>
<dbReference type="EMBL" id="MW973388">
    <property type="protein sequence ID" value="QTZ41439.1"/>
    <property type="molecule type" value="Genomic_RNA"/>
</dbReference>
<dbReference type="EMBL" id="MW973389">
    <property type="protein sequence ID" value="QTZ41451.1"/>
    <property type="molecule type" value="Genomic_RNA"/>
</dbReference>
<dbReference type="EMBL" id="MW973390">
    <property type="protein sequence ID" value="QTZ41463.1"/>
    <property type="molecule type" value="Genomic_RNA"/>
</dbReference>
<dbReference type="EMBL" id="MW973391">
    <property type="protein sequence ID" value="QTZ41475.1"/>
    <property type="molecule type" value="Genomic_RNA"/>
</dbReference>
<dbReference type="EMBL" id="MW973392">
    <property type="protein sequence ID" value="QTZ41487.1"/>
    <property type="molecule type" value="Genomic_RNA"/>
</dbReference>
<dbReference type="EMBL" id="MW973393">
    <property type="protein sequence ID" value="QTZ41499.1"/>
    <property type="molecule type" value="Genomic_RNA"/>
</dbReference>
<dbReference type="EMBL" id="MW973394">
    <property type="protein sequence ID" value="QTZ41511.1"/>
    <property type="molecule type" value="Genomic_RNA"/>
</dbReference>
<dbReference type="EMBL" id="MW973395">
    <property type="protein sequence ID" value="QTZ41523.1"/>
    <property type="molecule type" value="Genomic_RNA"/>
</dbReference>
<dbReference type="EMBL" id="MW973396">
    <property type="protein sequence ID" value="QTZ41535.1"/>
    <property type="molecule type" value="Genomic_RNA"/>
</dbReference>
<dbReference type="EMBL" id="MW973397">
    <property type="protein sequence ID" value="QTZ41547.1"/>
    <property type="molecule type" value="Genomic_RNA"/>
</dbReference>
<dbReference type="EMBL" id="MW973398">
    <property type="protein sequence ID" value="QTZ41559.1"/>
    <property type="molecule type" value="Genomic_RNA"/>
</dbReference>
<dbReference type="EMBL" id="MW973399">
    <property type="protein sequence ID" value="QTZ41571.1"/>
    <property type="molecule type" value="Genomic_RNA"/>
</dbReference>
<dbReference type="EMBL" id="MW973400">
    <property type="protein sequence ID" value="QTZ41583.1"/>
    <property type="molecule type" value="Genomic_RNA"/>
</dbReference>
<dbReference type="EMBL" id="MW973401">
    <property type="protein sequence ID" value="QTZ41595.1"/>
    <property type="molecule type" value="Genomic_RNA"/>
</dbReference>
<dbReference type="EMBL" id="MW973402">
    <property type="protein sequence ID" value="QTZ41607.1"/>
    <property type="molecule type" value="Genomic_RNA"/>
</dbReference>
<dbReference type="EMBL" id="MW973403">
    <property type="protein sequence ID" value="QTZ41619.1"/>
    <property type="molecule type" value="Genomic_RNA"/>
</dbReference>
<dbReference type="EMBL" id="MW973404">
    <property type="protein sequence ID" value="QTZ41631.1"/>
    <property type="molecule type" value="Genomic_RNA"/>
</dbReference>
<dbReference type="EMBL" id="MW973405">
    <property type="protein sequence ID" value="QTZ41643.1"/>
    <property type="molecule type" value="Genomic_RNA"/>
</dbReference>
<dbReference type="EMBL" id="MW973406">
    <property type="protein sequence ID" value="QTZ41655.1"/>
    <property type="molecule type" value="Genomic_RNA"/>
</dbReference>
<dbReference type="EMBL" id="MW973407">
    <property type="protein sequence ID" value="QTZ41667.1"/>
    <property type="molecule type" value="Genomic_RNA"/>
</dbReference>
<dbReference type="EMBL" id="MW973408">
    <property type="protein sequence ID" value="QTZ41679.1"/>
    <property type="molecule type" value="Genomic_RNA"/>
</dbReference>
<dbReference type="EMBL" id="MW973409">
    <property type="protein sequence ID" value="QTZ41691.1"/>
    <property type="molecule type" value="Genomic_RNA"/>
</dbReference>
<dbReference type="EMBL" id="MW973410">
    <property type="protein sequence ID" value="QTZ41703.1"/>
    <property type="molecule type" value="Genomic_RNA"/>
</dbReference>
<dbReference type="EMBL" id="MW973411">
    <property type="protein sequence ID" value="QTZ41715.1"/>
    <property type="molecule type" value="Genomic_RNA"/>
</dbReference>
<dbReference type="EMBL" id="MW973412">
    <property type="protein sequence ID" value="QTZ41727.1"/>
    <property type="molecule type" value="Genomic_RNA"/>
</dbReference>
<dbReference type="EMBL" id="MW973413">
    <property type="protein sequence ID" value="QTZ41739.1"/>
    <property type="molecule type" value="Genomic_RNA"/>
</dbReference>
<dbReference type="EMBL" id="MW973414">
    <property type="protein sequence ID" value="QTZ41751.1"/>
    <property type="molecule type" value="Genomic_RNA"/>
</dbReference>
<dbReference type="EMBL" id="MW973415">
    <property type="protein sequence ID" value="QTZ41763.1"/>
    <property type="molecule type" value="Genomic_RNA"/>
</dbReference>
<dbReference type="EMBL" id="MW973416">
    <property type="protein sequence ID" value="QTZ41775.1"/>
    <property type="molecule type" value="Genomic_RNA"/>
</dbReference>
<dbReference type="EMBL" id="MW973417">
    <property type="protein sequence ID" value="QTZ41787.1"/>
    <property type="molecule type" value="Genomic_RNA"/>
</dbReference>
<dbReference type="EMBL" id="MW973418">
    <property type="protein sequence ID" value="QTZ41799.1"/>
    <property type="molecule type" value="Genomic_RNA"/>
</dbReference>
<dbReference type="EMBL" id="MW973419">
    <property type="protein sequence ID" value="QTZ41811.1"/>
    <property type="molecule type" value="Genomic_RNA"/>
</dbReference>
<dbReference type="EMBL" id="MW973420">
    <property type="protein sequence ID" value="QTZ41823.1"/>
    <property type="molecule type" value="Genomic_RNA"/>
</dbReference>
<dbReference type="EMBL" id="MW973423">
    <property type="protein sequence ID" value="QTZ41859.1"/>
    <property type="molecule type" value="Genomic_RNA"/>
</dbReference>
<dbReference type="EMBL" id="MW973424">
    <property type="protein sequence ID" value="QTZ41871.1"/>
    <property type="molecule type" value="Genomic_RNA"/>
</dbReference>
<dbReference type="EMBL" id="MW973427">
    <property type="protein sequence ID" value="QTZ41907.1"/>
    <property type="molecule type" value="Genomic_RNA"/>
</dbReference>
<dbReference type="EMBL" id="MW973428">
    <property type="protein sequence ID" value="QTZ41919.1"/>
    <property type="molecule type" value="Genomic_RNA"/>
</dbReference>
<dbReference type="EMBL" id="MW973430">
    <property type="protein sequence ID" value="QTZ41943.1"/>
    <property type="molecule type" value="Genomic_RNA"/>
</dbReference>
<dbReference type="EMBL" id="MW973431">
    <property type="protein sequence ID" value="QTZ41955.1"/>
    <property type="molecule type" value="Genomic_RNA"/>
</dbReference>
<dbReference type="EMBL" id="MW973432">
    <property type="protein sequence ID" value="QTZ41967.1"/>
    <property type="molecule type" value="Genomic_RNA"/>
</dbReference>
<dbReference type="EMBL" id="MW973433">
    <property type="protein sequence ID" value="QTZ41979.1"/>
    <property type="molecule type" value="Genomic_RNA"/>
</dbReference>
<dbReference type="EMBL" id="MW973434">
    <property type="protein sequence ID" value="QTZ41991.1"/>
    <property type="molecule type" value="Genomic_RNA"/>
</dbReference>
<dbReference type="EMBL" id="MW973435">
    <property type="protein sequence ID" value="QTZ42003.1"/>
    <property type="molecule type" value="Genomic_RNA"/>
</dbReference>
<dbReference type="EMBL" id="MW973436">
    <property type="protein sequence ID" value="QTZ42015.1"/>
    <property type="molecule type" value="Genomic_RNA"/>
</dbReference>
<dbReference type="EMBL" id="MW973437">
    <property type="protein sequence ID" value="QTZ42027.1"/>
    <property type="molecule type" value="Genomic_RNA"/>
</dbReference>
<dbReference type="EMBL" id="MW973438">
    <property type="protein sequence ID" value="QTZ42039.1"/>
    <property type="molecule type" value="Genomic_RNA"/>
</dbReference>
<dbReference type="EMBL" id="MW973439">
    <property type="protein sequence ID" value="QTZ42051.1"/>
    <property type="molecule type" value="Genomic_RNA"/>
</dbReference>
<dbReference type="EMBL" id="MW973440">
    <property type="protein sequence ID" value="QTZ42063.1"/>
    <property type="molecule type" value="Genomic_RNA"/>
</dbReference>
<dbReference type="EMBL" id="MW973442">
    <property type="protein sequence ID" value="QTZ42086.1"/>
    <property type="molecule type" value="Genomic_RNA"/>
</dbReference>
<dbReference type="EMBL" id="MW973443">
    <property type="protein sequence ID" value="QTZ42098.1"/>
    <property type="molecule type" value="Genomic_RNA"/>
</dbReference>
<dbReference type="EMBL" id="MW973444">
    <property type="protein sequence ID" value="QTZ42110.1"/>
    <property type="molecule type" value="Genomic_RNA"/>
</dbReference>
<dbReference type="EMBL" id="MW973445">
    <property type="protein sequence ID" value="QTZ42122.1"/>
    <property type="molecule type" value="Genomic_RNA"/>
</dbReference>
<dbReference type="EMBL" id="MW973446">
    <property type="protein sequence ID" value="QTZ42134.1"/>
    <property type="molecule type" value="Genomic_RNA"/>
</dbReference>
<dbReference type="EMBL" id="MW973447">
    <property type="protein sequence ID" value="QTZ42146.1"/>
    <property type="molecule type" value="Genomic_RNA"/>
</dbReference>
<dbReference type="EMBL" id="MW973448">
    <property type="protein sequence ID" value="QTZ42158.1"/>
    <property type="molecule type" value="Genomic_RNA"/>
</dbReference>
<dbReference type="EMBL" id="MW973449">
    <property type="protein sequence ID" value="QTZ42170.1"/>
    <property type="molecule type" value="Genomic_RNA"/>
</dbReference>
<dbReference type="EMBL" id="MW973450">
    <property type="protein sequence ID" value="QTZ42182.1"/>
    <property type="molecule type" value="Genomic_RNA"/>
</dbReference>
<dbReference type="EMBL" id="MW973451">
    <property type="protein sequence ID" value="QTZ42194.1"/>
    <property type="molecule type" value="Genomic_RNA"/>
</dbReference>
<dbReference type="EMBL" id="MW973452">
    <property type="protein sequence ID" value="QTZ42206.1"/>
    <property type="molecule type" value="Genomic_RNA"/>
</dbReference>
<dbReference type="EMBL" id="MW973453">
    <property type="protein sequence ID" value="QTZ42218.1"/>
    <property type="molecule type" value="Genomic_RNA"/>
</dbReference>
<dbReference type="EMBL" id="MW973455">
    <property type="protein sequence ID" value="QTZ42241.1"/>
    <property type="molecule type" value="Genomic_RNA"/>
</dbReference>
<dbReference type="EMBL" id="MW973456">
    <property type="protein sequence ID" value="QTZ42253.1"/>
    <property type="molecule type" value="Genomic_RNA"/>
</dbReference>
<dbReference type="EMBL" id="MW973457">
    <property type="protein sequence ID" value="QTZ42265.1"/>
    <property type="molecule type" value="Genomic_RNA"/>
</dbReference>
<dbReference type="EMBL" id="MW973458">
    <property type="protein sequence ID" value="QTZ42277.1"/>
    <property type="molecule type" value="Genomic_RNA"/>
</dbReference>
<dbReference type="EMBL" id="MW973459">
    <property type="protein sequence ID" value="QTZ42289.1"/>
    <property type="molecule type" value="Genomic_RNA"/>
</dbReference>
<dbReference type="EMBL" id="MW973460">
    <property type="protein sequence ID" value="QTZ42301.1"/>
    <property type="molecule type" value="Genomic_RNA"/>
</dbReference>
<dbReference type="EMBL" id="MW973461">
    <property type="protein sequence ID" value="QTZ42313.1"/>
    <property type="molecule type" value="Genomic_RNA"/>
</dbReference>
<dbReference type="EMBL" id="MW973462">
    <property type="protein sequence ID" value="QTZ42325.1"/>
    <property type="molecule type" value="Genomic_RNA"/>
</dbReference>
<dbReference type="EMBL" id="MW973463">
    <property type="protein sequence ID" value="QTZ42337.1"/>
    <property type="molecule type" value="Genomic_RNA"/>
</dbReference>
<dbReference type="EMBL" id="MW973464">
    <property type="protein sequence ID" value="QTZ42349.1"/>
    <property type="molecule type" value="Genomic_RNA"/>
</dbReference>
<dbReference type="EMBL" id="MW973465">
    <property type="protein sequence ID" value="QTZ42361.1"/>
    <property type="molecule type" value="Genomic_RNA"/>
</dbReference>
<dbReference type="EMBL" id="MW973466">
    <property type="protein sequence ID" value="QTZ42373.1"/>
    <property type="molecule type" value="Genomic_RNA"/>
</dbReference>
<dbReference type="EMBL" id="MW973467">
    <property type="protein sequence ID" value="QTZ42385.1"/>
    <property type="molecule type" value="Genomic_RNA"/>
</dbReference>
<dbReference type="EMBL" id="MW973468">
    <property type="protein sequence ID" value="QTZ42397.1"/>
    <property type="molecule type" value="Genomic_RNA"/>
</dbReference>
<dbReference type="EMBL" id="MW973469">
    <property type="protein sequence ID" value="QTZ42409.1"/>
    <property type="molecule type" value="Genomic_RNA"/>
</dbReference>
<dbReference type="EMBL" id="MW973470">
    <property type="protein sequence ID" value="QTZ42421.1"/>
    <property type="molecule type" value="Genomic_RNA"/>
</dbReference>
<dbReference type="EMBL" id="MW973471">
    <property type="protein sequence ID" value="QTZ42433.1"/>
    <property type="molecule type" value="Genomic_RNA"/>
</dbReference>
<dbReference type="EMBL" id="MW973472">
    <property type="protein sequence ID" value="QTZ42445.1"/>
    <property type="molecule type" value="Genomic_RNA"/>
</dbReference>
<dbReference type="EMBL" id="MW973473">
    <property type="protein sequence ID" value="QTZ42457.1"/>
    <property type="molecule type" value="Genomic_RNA"/>
</dbReference>
<dbReference type="EMBL" id="MW973474">
    <property type="protein sequence ID" value="QTZ42469.1"/>
    <property type="molecule type" value="Genomic_RNA"/>
</dbReference>
<dbReference type="EMBL" id="MW973475">
    <property type="protein sequence ID" value="QTZ42481.1"/>
    <property type="molecule type" value="Genomic_RNA"/>
</dbReference>
<dbReference type="EMBL" id="MW973476">
    <property type="protein sequence ID" value="QTZ42493.1"/>
    <property type="molecule type" value="Genomic_RNA"/>
</dbReference>
<dbReference type="EMBL" id="MW973477">
    <property type="protein sequence ID" value="QTZ42505.1"/>
    <property type="molecule type" value="Genomic_RNA"/>
</dbReference>
<dbReference type="EMBL" id="MW973478">
    <property type="protein sequence ID" value="QTZ42517.1"/>
    <property type="molecule type" value="Genomic_RNA"/>
</dbReference>
<dbReference type="EMBL" id="MW973479">
    <property type="protein sequence ID" value="QTZ42528.1"/>
    <property type="molecule type" value="Genomic_RNA"/>
</dbReference>
<dbReference type="EMBL" id="MW973480">
    <property type="protein sequence ID" value="QTZ42540.1"/>
    <property type="molecule type" value="Genomic_RNA"/>
</dbReference>
<dbReference type="EMBL" id="MW973481">
    <property type="protein sequence ID" value="QTZ42552.1"/>
    <property type="molecule type" value="Genomic_RNA"/>
</dbReference>
<dbReference type="EMBL" id="MW973482">
    <property type="protein sequence ID" value="QTZ42564.1"/>
    <property type="molecule type" value="Genomic_RNA"/>
</dbReference>
<dbReference type="EMBL" id="MW973484">
    <property type="protein sequence ID" value="QTZ42588.1"/>
    <property type="molecule type" value="Genomic_RNA"/>
</dbReference>
<dbReference type="EMBL" id="MW973485">
    <property type="protein sequence ID" value="QTZ42600.1"/>
    <property type="molecule type" value="Genomic_RNA"/>
</dbReference>
<dbReference type="EMBL" id="MW973486">
    <property type="protein sequence ID" value="QTZ42612.1"/>
    <property type="molecule type" value="Genomic_RNA"/>
</dbReference>
<dbReference type="EMBL" id="MW973489">
    <property type="protein sequence ID" value="QTZ42648.1"/>
    <property type="molecule type" value="Genomic_RNA"/>
</dbReference>
<dbReference type="EMBL" id="MW973490">
    <property type="protein sequence ID" value="QTZ42660.1"/>
    <property type="molecule type" value="Genomic_RNA"/>
</dbReference>
<dbReference type="EMBL" id="MW973491">
    <property type="protein sequence ID" value="QTZ42672.1"/>
    <property type="molecule type" value="Genomic_RNA"/>
</dbReference>
<dbReference type="EMBL" id="MW973492">
    <property type="protein sequence ID" value="QTZ42684.1"/>
    <property type="molecule type" value="Genomic_RNA"/>
</dbReference>
<dbReference type="EMBL" id="MW973494">
    <property type="protein sequence ID" value="QTZ42708.1"/>
    <property type="molecule type" value="Genomic_RNA"/>
</dbReference>
<dbReference type="EMBL" id="MW973495">
    <property type="protein sequence ID" value="QTZ42720.1"/>
    <property type="molecule type" value="Genomic_RNA"/>
</dbReference>
<dbReference type="EMBL" id="MW973496">
    <property type="protein sequence ID" value="QTZ42732.1"/>
    <property type="molecule type" value="Genomic_RNA"/>
</dbReference>
<dbReference type="EMBL" id="MW973497">
    <property type="protein sequence ID" value="QTZ42744.1"/>
    <property type="molecule type" value="Genomic_RNA"/>
</dbReference>
<dbReference type="EMBL" id="MW973498">
    <property type="protein sequence ID" value="QTZ42756.1"/>
    <property type="molecule type" value="Genomic_RNA"/>
</dbReference>
<dbReference type="EMBL" id="MW973499">
    <property type="protein sequence ID" value="QTZ42768.1"/>
    <property type="molecule type" value="Genomic_RNA"/>
</dbReference>
<dbReference type="EMBL" id="MW973500">
    <property type="protein sequence ID" value="QTZ42780.1"/>
    <property type="molecule type" value="Genomic_RNA"/>
</dbReference>
<dbReference type="EMBL" id="MW973501">
    <property type="protein sequence ID" value="QTZ42792.1"/>
    <property type="molecule type" value="Genomic_RNA"/>
</dbReference>
<dbReference type="EMBL" id="MW973502">
    <property type="protein sequence ID" value="QTZ42804.1"/>
    <property type="molecule type" value="Genomic_RNA"/>
</dbReference>
<dbReference type="EMBL" id="MW973503">
    <property type="protein sequence ID" value="QTZ42816.1"/>
    <property type="molecule type" value="Genomic_RNA"/>
</dbReference>
<dbReference type="EMBL" id="MW973504">
    <property type="protein sequence ID" value="QTZ42828.1"/>
    <property type="molecule type" value="Genomic_RNA"/>
</dbReference>
<dbReference type="EMBL" id="MW973505">
    <property type="protein sequence ID" value="QTZ42840.1"/>
    <property type="molecule type" value="Genomic_RNA"/>
</dbReference>
<dbReference type="EMBL" id="MW973506">
    <property type="protein sequence ID" value="QTZ42852.1"/>
    <property type="molecule type" value="Genomic_RNA"/>
</dbReference>
<dbReference type="EMBL" id="MW973507">
    <property type="protein sequence ID" value="QTZ42864.1"/>
    <property type="molecule type" value="Genomic_RNA"/>
</dbReference>
<dbReference type="EMBL" id="MW973508">
    <property type="protein sequence ID" value="QTZ42876.1"/>
    <property type="molecule type" value="Genomic_RNA"/>
</dbReference>
<dbReference type="EMBL" id="MW973509">
    <property type="protein sequence ID" value="QTZ42888.1"/>
    <property type="molecule type" value="Genomic_RNA"/>
</dbReference>
<dbReference type="EMBL" id="MW973510">
    <property type="protein sequence ID" value="QTZ42900.1"/>
    <property type="molecule type" value="Genomic_RNA"/>
</dbReference>
<dbReference type="EMBL" id="MW973511">
    <property type="protein sequence ID" value="QTZ42912.1"/>
    <property type="molecule type" value="Genomic_RNA"/>
</dbReference>
<dbReference type="EMBL" id="MW973512">
    <property type="protein sequence ID" value="QTZ42924.1"/>
    <property type="molecule type" value="Genomic_RNA"/>
</dbReference>
<dbReference type="EMBL" id="MW973513">
    <property type="protein sequence ID" value="QTZ42936.1"/>
    <property type="molecule type" value="Genomic_RNA"/>
</dbReference>
<dbReference type="EMBL" id="MW973514">
    <property type="protein sequence ID" value="QTZ42948.1"/>
    <property type="molecule type" value="Genomic_RNA"/>
</dbReference>
<dbReference type="EMBL" id="MW973515">
    <property type="protein sequence ID" value="QTZ42960.1"/>
    <property type="molecule type" value="Genomic_RNA"/>
</dbReference>
<dbReference type="EMBL" id="MW973516">
    <property type="protein sequence ID" value="QTZ42972.1"/>
    <property type="molecule type" value="Genomic_RNA"/>
</dbReference>
<dbReference type="EMBL" id="MW973517">
    <property type="protein sequence ID" value="QTZ42984.1"/>
    <property type="molecule type" value="Genomic_RNA"/>
</dbReference>
<dbReference type="EMBL" id="MW973518">
    <property type="protein sequence ID" value="QTZ42996.1"/>
    <property type="molecule type" value="Genomic_RNA"/>
</dbReference>
<dbReference type="EMBL" id="MW973519">
    <property type="protein sequence ID" value="QTZ43008.1"/>
    <property type="molecule type" value="Genomic_RNA"/>
</dbReference>
<dbReference type="EMBL" id="MW973520">
    <property type="protein sequence ID" value="QTZ43019.1"/>
    <property type="molecule type" value="Genomic_RNA"/>
</dbReference>
<dbReference type="EMBL" id="MW973521">
    <property type="protein sequence ID" value="QTZ43031.1"/>
    <property type="molecule type" value="Genomic_RNA"/>
</dbReference>
<dbReference type="EMBL" id="MW973522">
    <property type="protein sequence ID" value="QTZ43043.1"/>
    <property type="molecule type" value="Genomic_RNA"/>
</dbReference>
<dbReference type="EMBL" id="MW973523">
    <property type="protein sequence ID" value="QTZ43055.1"/>
    <property type="molecule type" value="Genomic_RNA"/>
</dbReference>
<dbReference type="EMBL" id="MW973524">
    <property type="protein sequence ID" value="QTZ43067.1"/>
    <property type="molecule type" value="Genomic_RNA"/>
</dbReference>
<dbReference type="EMBL" id="MW973525">
    <property type="protein sequence ID" value="QTZ43079.1"/>
    <property type="molecule type" value="Genomic_RNA"/>
</dbReference>
<dbReference type="EMBL" id="MW973526">
    <property type="protein sequence ID" value="QTZ43091.1"/>
    <property type="molecule type" value="Genomic_RNA"/>
</dbReference>
<dbReference type="EMBL" id="MW973527">
    <property type="protein sequence ID" value="QTZ43103.1"/>
    <property type="molecule type" value="Genomic_RNA"/>
</dbReference>
<dbReference type="EMBL" id="MW973528">
    <property type="protein sequence ID" value="QTZ43115.1"/>
    <property type="molecule type" value="Genomic_RNA"/>
</dbReference>
<dbReference type="EMBL" id="MW973529">
    <property type="protein sequence ID" value="QTZ43126.1"/>
    <property type="molecule type" value="Genomic_RNA"/>
</dbReference>
<dbReference type="EMBL" id="MW973530">
    <property type="protein sequence ID" value="QTZ43138.1"/>
    <property type="molecule type" value="Genomic_RNA"/>
</dbReference>
<dbReference type="EMBL" id="MW973531">
    <property type="protein sequence ID" value="QTZ43150.1"/>
    <property type="molecule type" value="Genomic_RNA"/>
</dbReference>
<dbReference type="EMBL" id="MW973532">
    <property type="protein sequence ID" value="QTZ43162.1"/>
    <property type="molecule type" value="Genomic_RNA"/>
</dbReference>
<dbReference type="EMBL" id="MW973533">
    <property type="protein sequence ID" value="QTZ43174.1"/>
    <property type="molecule type" value="Genomic_RNA"/>
</dbReference>
<dbReference type="EMBL" id="MW973534">
    <property type="protein sequence ID" value="QTZ43186.1"/>
    <property type="molecule type" value="Genomic_RNA"/>
</dbReference>
<dbReference type="EMBL" id="MW973535">
    <property type="protein sequence ID" value="QTZ43198.1"/>
    <property type="molecule type" value="Genomic_RNA"/>
</dbReference>
<dbReference type="EMBL" id="MW973536">
    <property type="protein sequence ID" value="QTZ43210.1"/>
    <property type="molecule type" value="Genomic_RNA"/>
</dbReference>
<dbReference type="EMBL" id="MW973537">
    <property type="protein sequence ID" value="QTZ43222.1"/>
    <property type="molecule type" value="Genomic_RNA"/>
</dbReference>
<dbReference type="EMBL" id="MW973538">
    <property type="protein sequence ID" value="QTZ43234.1"/>
    <property type="molecule type" value="Genomic_RNA"/>
</dbReference>
<dbReference type="EMBL" id="MW973539">
    <property type="protein sequence ID" value="QTZ43246.1"/>
    <property type="molecule type" value="Genomic_RNA"/>
</dbReference>
<dbReference type="EMBL" id="MW973540">
    <property type="protein sequence ID" value="QTZ43258.1"/>
    <property type="molecule type" value="Genomic_RNA"/>
</dbReference>
<dbReference type="EMBL" id="MW973541">
    <property type="protein sequence ID" value="QTZ43270.1"/>
    <property type="molecule type" value="Genomic_RNA"/>
</dbReference>
<dbReference type="EMBL" id="MW973542">
    <property type="protein sequence ID" value="QTZ43282.1"/>
    <property type="molecule type" value="Genomic_RNA"/>
</dbReference>
<dbReference type="EMBL" id="MW973543">
    <property type="protein sequence ID" value="QTZ43294.1"/>
    <property type="molecule type" value="Genomic_RNA"/>
</dbReference>
<dbReference type="EMBL" id="MW973544">
    <property type="protein sequence ID" value="QTZ43306.1"/>
    <property type="molecule type" value="Genomic_RNA"/>
</dbReference>
<dbReference type="EMBL" id="MW973545">
    <property type="protein sequence ID" value="QTZ43318.1"/>
    <property type="molecule type" value="Genomic_RNA"/>
</dbReference>
<dbReference type="EMBL" id="MW973546">
    <property type="protein sequence ID" value="QTZ43330.1"/>
    <property type="molecule type" value="Genomic_RNA"/>
</dbReference>
<dbReference type="EMBL" id="MW973547">
    <property type="protein sequence ID" value="QTZ43342.1"/>
    <property type="molecule type" value="Genomic_RNA"/>
</dbReference>
<dbReference type="EMBL" id="MW973548">
    <property type="protein sequence ID" value="QTZ43354.1"/>
    <property type="molecule type" value="Genomic_RNA"/>
</dbReference>
<dbReference type="EMBL" id="MW973549">
    <property type="protein sequence ID" value="QTZ43366.1"/>
    <property type="molecule type" value="Genomic_RNA"/>
</dbReference>
<dbReference type="EMBL" id="MW973550">
    <property type="protein sequence ID" value="QTZ43378.1"/>
    <property type="molecule type" value="Genomic_RNA"/>
</dbReference>
<dbReference type="EMBL" id="MW973551">
    <property type="protein sequence ID" value="QTZ43390.1"/>
    <property type="molecule type" value="Genomic_RNA"/>
</dbReference>
<dbReference type="EMBL" id="MW973554">
    <property type="protein sequence ID" value="QTZ43426.1"/>
    <property type="molecule type" value="Genomic_RNA"/>
</dbReference>
<dbReference type="EMBL" id="MW973555">
    <property type="protein sequence ID" value="QTZ43438.1"/>
    <property type="molecule type" value="Genomic_RNA"/>
</dbReference>
<dbReference type="EMBL" id="MW973556">
    <property type="protein sequence ID" value="QTZ43450.1"/>
    <property type="molecule type" value="Genomic_RNA"/>
</dbReference>
<dbReference type="EMBL" id="MW973557">
    <property type="protein sequence ID" value="QTZ43462.1"/>
    <property type="molecule type" value="Genomic_RNA"/>
</dbReference>
<dbReference type="EMBL" id="MW973558">
    <property type="protein sequence ID" value="QTZ43474.1"/>
    <property type="molecule type" value="Genomic_RNA"/>
</dbReference>
<dbReference type="EMBL" id="MW973559">
    <property type="protein sequence ID" value="QTZ43486.1"/>
    <property type="molecule type" value="Genomic_RNA"/>
</dbReference>
<dbReference type="EMBL" id="MW973560">
    <property type="protein sequence ID" value="QTZ43497.1"/>
    <property type="molecule type" value="Genomic_RNA"/>
</dbReference>
<dbReference type="EMBL" id="MW973562">
    <property type="protein sequence ID" value="QTZ43521.1"/>
    <property type="molecule type" value="Genomic_RNA"/>
</dbReference>
<dbReference type="EMBL" id="MW973563">
    <property type="protein sequence ID" value="QTZ43533.1"/>
    <property type="molecule type" value="Genomic_RNA"/>
</dbReference>
<dbReference type="EMBL" id="MW973564">
    <property type="protein sequence ID" value="QTZ43545.1"/>
    <property type="molecule type" value="Genomic_RNA"/>
</dbReference>
<dbReference type="EMBL" id="MW973565">
    <property type="protein sequence ID" value="QTZ43557.1"/>
    <property type="molecule type" value="Genomic_RNA"/>
</dbReference>
<dbReference type="EMBL" id="MW973566">
    <property type="protein sequence ID" value="QTZ43569.1"/>
    <property type="molecule type" value="Genomic_RNA"/>
</dbReference>
<dbReference type="EMBL" id="MW973567">
    <property type="protein sequence ID" value="QTZ43581.1"/>
    <property type="molecule type" value="Genomic_RNA"/>
</dbReference>
<dbReference type="EMBL" id="MW973568">
    <property type="protein sequence ID" value="QTZ43593.1"/>
    <property type="molecule type" value="Genomic_RNA"/>
</dbReference>
<dbReference type="EMBL" id="MW973569">
    <property type="protein sequence ID" value="QTZ43605.1"/>
    <property type="molecule type" value="Genomic_RNA"/>
</dbReference>
<dbReference type="EMBL" id="MW973570">
    <property type="protein sequence ID" value="QTZ43616.1"/>
    <property type="molecule type" value="Genomic_RNA"/>
</dbReference>
<dbReference type="EMBL" id="MW973571">
    <property type="protein sequence ID" value="QTZ43628.1"/>
    <property type="molecule type" value="Genomic_RNA"/>
</dbReference>
<dbReference type="EMBL" id="MW973572">
    <property type="protein sequence ID" value="QTZ43640.1"/>
    <property type="molecule type" value="Genomic_RNA"/>
</dbReference>
<dbReference type="EMBL" id="MW973573">
    <property type="protein sequence ID" value="QTZ43652.1"/>
    <property type="molecule type" value="Genomic_RNA"/>
</dbReference>
<dbReference type="EMBL" id="MW973574">
    <property type="protein sequence ID" value="QTZ43664.1"/>
    <property type="molecule type" value="Genomic_RNA"/>
</dbReference>
<dbReference type="EMBL" id="MW973575">
    <property type="protein sequence ID" value="QTZ43676.1"/>
    <property type="molecule type" value="Genomic_RNA"/>
</dbReference>
<dbReference type="EMBL" id="MW973576">
    <property type="protein sequence ID" value="QTZ43688.1"/>
    <property type="molecule type" value="Genomic_RNA"/>
</dbReference>
<dbReference type="EMBL" id="MW973577">
    <property type="protein sequence ID" value="QTZ43700.1"/>
    <property type="molecule type" value="Genomic_RNA"/>
</dbReference>
<dbReference type="EMBL" id="MW973578">
    <property type="protein sequence ID" value="QTZ43712.1"/>
    <property type="molecule type" value="Genomic_RNA"/>
</dbReference>
<dbReference type="EMBL" id="MW973579">
    <property type="protein sequence ID" value="QTZ43724.1"/>
    <property type="molecule type" value="Genomic_RNA"/>
</dbReference>
<dbReference type="EMBL" id="MW973580">
    <property type="protein sequence ID" value="QTZ43736.1"/>
    <property type="molecule type" value="Genomic_RNA"/>
</dbReference>
<dbReference type="EMBL" id="MW973581">
    <property type="protein sequence ID" value="QTZ43748.1"/>
    <property type="molecule type" value="Genomic_RNA"/>
</dbReference>
<dbReference type="EMBL" id="MW973582">
    <property type="protein sequence ID" value="QTZ43760.1"/>
    <property type="molecule type" value="Genomic_RNA"/>
</dbReference>
<dbReference type="EMBL" id="MW973583">
    <property type="protein sequence ID" value="QTZ43772.1"/>
    <property type="molecule type" value="Genomic_RNA"/>
</dbReference>
<dbReference type="EMBL" id="MW973585">
    <property type="protein sequence ID" value="QTZ43796.1"/>
    <property type="molecule type" value="Genomic_RNA"/>
</dbReference>
<dbReference type="EMBL" id="MW973586">
    <property type="protein sequence ID" value="QTZ43808.1"/>
    <property type="molecule type" value="Genomic_RNA"/>
</dbReference>
<dbReference type="EMBL" id="MW973587">
    <property type="protein sequence ID" value="QTZ43819.1"/>
    <property type="molecule type" value="Genomic_RNA"/>
</dbReference>
<dbReference type="EMBL" id="MW973588">
    <property type="protein sequence ID" value="QTZ43831.1"/>
    <property type="molecule type" value="Genomic_RNA"/>
</dbReference>
<dbReference type="EMBL" id="MW973589">
    <property type="protein sequence ID" value="QTZ43843.1"/>
    <property type="molecule type" value="Genomic_RNA"/>
</dbReference>
<dbReference type="EMBL" id="MW973590">
    <property type="protein sequence ID" value="QTZ43855.1"/>
    <property type="molecule type" value="Genomic_RNA"/>
</dbReference>
<dbReference type="EMBL" id="MW973591">
    <property type="protein sequence ID" value="QTZ43867.1"/>
    <property type="molecule type" value="Genomic_RNA"/>
</dbReference>
<dbReference type="EMBL" id="MW973592">
    <property type="protein sequence ID" value="QTZ43879.1"/>
    <property type="molecule type" value="Genomic_RNA"/>
</dbReference>
<dbReference type="EMBL" id="MW973593">
    <property type="protein sequence ID" value="QTZ43891.1"/>
    <property type="molecule type" value="Genomic_RNA"/>
</dbReference>
<dbReference type="EMBL" id="MW973594">
    <property type="protein sequence ID" value="QTZ43903.1"/>
    <property type="molecule type" value="Genomic_RNA"/>
</dbReference>
<dbReference type="EMBL" id="MW973595">
    <property type="protein sequence ID" value="QTZ43915.1"/>
    <property type="molecule type" value="Genomic_RNA"/>
</dbReference>
<dbReference type="EMBL" id="MW973596">
    <property type="protein sequence ID" value="QTZ43927.1"/>
    <property type="molecule type" value="Genomic_RNA"/>
</dbReference>
<dbReference type="EMBL" id="MW973597">
    <property type="protein sequence ID" value="QTZ43939.1"/>
    <property type="molecule type" value="Genomic_RNA"/>
</dbReference>
<dbReference type="EMBL" id="MW973598">
    <property type="protein sequence ID" value="QTZ43951.1"/>
    <property type="molecule type" value="Genomic_RNA"/>
</dbReference>
<dbReference type="EMBL" id="MW973599">
    <property type="protein sequence ID" value="QTZ43963.1"/>
    <property type="molecule type" value="Genomic_RNA"/>
</dbReference>
<dbReference type="EMBL" id="MW973600">
    <property type="protein sequence ID" value="QTZ43975.1"/>
    <property type="molecule type" value="Genomic_RNA"/>
</dbReference>
<dbReference type="EMBL" id="MW973601">
    <property type="protein sequence ID" value="QTZ43987.1"/>
    <property type="molecule type" value="Genomic_RNA"/>
</dbReference>
<dbReference type="EMBL" id="MW973602">
    <property type="protein sequence ID" value="QTZ43999.1"/>
    <property type="molecule type" value="Genomic_RNA"/>
</dbReference>
<dbReference type="EMBL" id="MW973603">
    <property type="protein sequence ID" value="QTZ44011.1"/>
    <property type="molecule type" value="Genomic_RNA"/>
</dbReference>
<dbReference type="EMBL" id="MW973604">
    <property type="protein sequence ID" value="QTZ44023.1"/>
    <property type="molecule type" value="Genomic_RNA"/>
</dbReference>
<dbReference type="EMBL" id="MW973605">
    <property type="protein sequence ID" value="QTZ44035.1"/>
    <property type="molecule type" value="Genomic_RNA"/>
</dbReference>
<dbReference type="EMBL" id="MW973606">
    <property type="protein sequence ID" value="QTZ44047.1"/>
    <property type="molecule type" value="Genomic_RNA"/>
</dbReference>
<dbReference type="EMBL" id="MW973607">
    <property type="protein sequence ID" value="QTZ44059.1"/>
    <property type="molecule type" value="Genomic_RNA"/>
</dbReference>
<dbReference type="EMBL" id="MW973608">
    <property type="protein sequence ID" value="QTZ44071.1"/>
    <property type="molecule type" value="Genomic_RNA"/>
</dbReference>
<dbReference type="EMBL" id="MW973609">
    <property type="protein sequence ID" value="QTZ44083.1"/>
    <property type="molecule type" value="Genomic_RNA"/>
</dbReference>
<dbReference type="EMBL" id="MW973610">
    <property type="protein sequence ID" value="QTZ44095.1"/>
    <property type="molecule type" value="Genomic_RNA"/>
</dbReference>
<dbReference type="EMBL" id="MW973611">
    <property type="protein sequence ID" value="QTZ44107.1"/>
    <property type="molecule type" value="Genomic_RNA"/>
</dbReference>
<dbReference type="EMBL" id="MW973612">
    <property type="protein sequence ID" value="QTZ44119.1"/>
    <property type="molecule type" value="Genomic_RNA"/>
</dbReference>
<dbReference type="EMBL" id="MW973613">
    <property type="protein sequence ID" value="QTZ44131.1"/>
    <property type="molecule type" value="Genomic_RNA"/>
</dbReference>
<dbReference type="EMBL" id="MW973614">
    <property type="protein sequence ID" value="QTZ44143.1"/>
    <property type="molecule type" value="Genomic_RNA"/>
</dbReference>
<dbReference type="EMBL" id="MW973615">
    <property type="protein sequence ID" value="QTZ44155.1"/>
    <property type="molecule type" value="Genomic_RNA"/>
</dbReference>
<dbReference type="EMBL" id="MW973616">
    <property type="protein sequence ID" value="QTZ44167.1"/>
    <property type="molecule type" value="Genomic_RNA"/>
</dbReference>
<dbReference type="EMBL" id="MW973617">
    <property type="protein sequence ID" value="QTZ44179.1"/>
    <property type="molecule type" value="Genomic_RNA"/>
</dbReference>
<dbReference type="EMBL" id="MW973618">
    <property type="protein sequence ID" value="QTZ44191.1"/>
    <property type="molecule type" value="Genomic_RNA"/>
</dbReference>
<dbReference type="EMBL" id="MW973619">
    <property type="protein sequence ID" value="QTZ44203.1"/>
    <property type="molecule type" value="Genomic_RNA"/>
</dbReference>
<dbReference type="EMBL" id="MW973620">
    <property type="protein sequence ID" value="QTZ44215.1"/>
    <property type="molecule type" value="Genomic_RNA"/>
</dbReference>
<dbReference type="EMBL" id="MW973621">
    <property type="protein sequence ID" value="QTZ44227.1"/>
    <property type="molecule type" value="Genomic_RNA"/>
</dbReference>
<dbReference type="EMBL" id="MW973623">
    <property type="protein sequence ID" value="QTZ44250.1"/>
    <property type="molecule type" value="Genomic_RNA"/>
</dbReference>
<dbReference type="EMBL" id="MW973624">
    <property type="protein sequence ID" value="QTZ44262.1"/>
    <property type="molecule type" value="Genomic_RNA"/>
</dbReference>
<dbReference type="EMBL" id="MW973625">
    <property type="protein sequence ID" value="QTZ44274.1"/>
    <property type="molecule type" value="Genomic_RNA"/>
</dbReference>
<dbReference type="EMBL" id="MW973626">
    <property type="protein sequence ID" value="QTZ44286.1"/>
    <property type="molecule type" value="Genomic_RNA"/>
</dbReference>
<dbReference type="EMBL" id="MW973627">
    <property type="protein sequence ID" value="QTZ44298.1"/>
    <property type="molecule type" value="Genomic_RNA"/>
</dbReference>
<dbReference type="EMBL" id="MW973628">
    <property type="protein sequence ID" value="QTZ44310.1"/>
    <property type="molecule type" value="Genomic_RNA"/>
</dbReference>
<dbReference type="EMBL" id="MW973629">
    <property type="protein sequence ID" value="QTZ44322.1"/>
    <property type="molecule type" value="Genomic_RNA"/>
</dbReference>
<dbReference type="EMBL" id="MW973630">
    <property type="protein sequence ID" value="QTZ44334.1"/>
    <property type="molecule type" value="Genomic_RNA"/>
</dbReference>
<dbReference type="EMBL" id="MW973631">
    <property type="protein sequence ID" value="QTZ44346.1"/>
    <property type="molecule type" value="Genomic_RNA"/>
</dbReference>
<dbReference type="EMBL" id="MW973632">
    <property type="protein sequence ID" value="QTZ44358.1"/>
    <property type="molecule type" value="Genomic_RNA"/>
</dbReference>
<dbReference type="EMBL" id="MW973633">
    <property type="protein sequence ID" value="QTZ44370.1"/>
    <property type="molecule type" value="Genomic_RNA"/>
</dbReference>
<dbReference type="EMBL" id="MW973634">
    <property type="protein sequence ID" value="QTZ44382.1"/>
    <property type="molecule type" value="Genomic_RNA"/>
</dbReference>
<dbReference type="EMBL" id="MW973635">
    <property type="protein sequence ID" value="QTZ44394.1"/>
    <property type="molecule type" value="Genomic_RNA"/>
</dbReference>
<dbReference type="EMBL" id="MW973636">
    <property type="protein sequence ID" value="QTZ44406.1"/>
    <property type="molecule type" value="Genomic_RNA"/>
</dbReference>
<dbReference type="EMBL" id="MW973637">
    <property type="protein sequence ID" value="QTZ44418.1"/>
    <property type="molecule type" value="Genomic_RNA"/>
</dbReference>
<dbReference type="EMBL" id="MW973638">
    <property type="protein sequence ID" value="QTZ44430.1"/>
    <property type="molecule type" value="Genomic_RNA"/>
</dbReference>
<dbReference type="EMBL" id="MW973639">
    <property type="protein sequence ID" value="QTZ44442.1"/>
    <property type="molecule type" value="Genomic_RNA"/>
</dbReference>
<dbReference type="EMBL" id="MW973640">
    <property type="protein sequence ID" value="QTZ44454.1"/>
    <property type="molecule type" value="Genomic_RNA"/>
</dbReference>
<dbReference type="EMBL" id="MW973641">
    <property type="protein sequence ID" value="QTZ44466.1"/>
    <property type="molecule type" value="Genomic_RNA"/>
</dbReference>
<dbReference type="EMBL" id="MW973642">
    <property type="protein sequence ID" value="QTZ44478.1"/>
    <property type="molecule type" value="Genomic_RNA"/>
</dbReference>
<dbReference type="EMBL" id="MW973643">
    <property type="protein sequence ID" value="QTZ44490.1"/>
    <property type="molecule type" value="Genomic_RNA"/>
</dbReference>
<dbReference type="EMBL" id="MW973644">
    <property type="protein sequence ID" value="QTZ44502.1"/>
    <property type="molecule type" value="Genomic_RNA"/>
</dbReference>
<dbReference type="EMBL" id="MW973645">
    <property type="protein sequence ID" value="QTZ44514.1"/>
    <property type="molecule type" value="Genomic_RNA"/>
</dbReference>
<dbReference type="EMBL" id="MW973646">
    <property type="protein sequence ID" value="QTZ44526.1"/>
    <property type="molecule type" value="Genomic_RNA"/>
</dbReference>
<dbReference type="EMBL" id="MW973647">
    <property type="protein sequence ID" value="QTZ44538.1"/>
    <property type="molecule type" value="Genomic_RNA"/>
</dbReference>
<dbReference type="EMBL" id="MW973648">
    <property type="protein sequence ID" value="QTZ44550.1"/>
    <property type="molecule type" value="Genomic_RNA"/>
</dbReference>
<dbReference type="EMBL" id="MW973649">
    <property type="protein sequence ID" value="QTZ44562.1"/>
    <property type="molecule type" value="Genomic_RNA"/>
</dbReference>
<dbReference type="EMBL" id="MW973650">
    <property type="protein sequence ID" value="QTZ44574.1"/>
    <property type="molecule type" value="Genomic_RNA"/>
</dbReference>
<dbReference type="EMBL" id="MW973651">
    <property type="protein sequence ID" value="QTZ44586.1"/>
    <property type="molecule type" value="Genomic_RNA"/>
</dbReference>
<dbReference type="EMBL" id="MW973652">
    <property type="protein sequence ID" value="QTZ44598.1"/>
    <property type="molecule type" value="Genomic_RNA"/>
</dbReference>
<dbReference type="EMBL" id="MW973653">
    <property type="protein sequence ID" value="QTZ44610.1"/>
    <property type="molecule type" value="Genomic_RNA"/>
</dbReference>
<dbReference type="EMBL" id="MW973654">
    <property type="protein sequence ID" value="QTZ44622.1"/>
    <property type="molecule type" value="Genomic_RNA"/>
</dbReference>
<dbReference type="EMBL" id="MW973655">
    <property type="protein sequence ID" value="QTZ44634.1"/>
    <property type="molecule type" value="Genomic_RNA"/>
</dbReference>
<dbReference type="EMBL" id="MW973656">
    <property type="protein sequence ID" value="QTZ44646.1"/>
    <property type="molecule type" value="Genomic_RNA"/>
</dbReference>
<dbReference type="EMBL" id="MW973657">
    <property type="protein sequence ID" value="QTZ44658.1"/>
    <property type="molecule type" value="Genomic_RNA"/>
</dbReference>
<dbReference type="EMBL" id="MW973658">
    <property type="protein sequence ID" value="QTZ44670.1"/>
    <property type="molecule type" value="Genomic_RNA"/>
</dbReference>
<dbReference type="EMBL" id="MW973659">
    <property type="protein sequence ID" value="QTZ44682.1"/>
    <property type="molecule type" value="Genomic_RNA"/>
</dbReference>
<dbReference type="EMBL" id="MW973660">
    <property type="protein sequence ID" value="QTZ44694.1"/>
    <property type="molecule type" value="Genomic_RNA"/>
</dbReference>
<dbReference type="EMBL" id="MW973661">
    <property type="protein sequence ID" value="QTZ44706.1"/>
    <property type="molecule type" value="Genomic_RNA"/>
</dbReference>
<dbReference type="EMBL" id="MW973662">
    <property type="protein sequence ID" value="QTZ44718.1"/>
    <property type="molecule type" value="Genomic_RNA"/>
</dbReference>
<dbReference type="EMBL" id="MW973663">
    <property type="protein sequence ID" value="QTZ44730.1"/>
    <property type="molecule type" value="Genomic_RNA"/>
</dbReference>
<dbReference type="EMBL" id="MW973664">
    <property type="protein sequence ID" value="QTZ44742.1"/>
    <property type="molecule type" value="Genomic_RNA"/>
</dbReference>
<dbReference type="EMBL" id="MW973665">
    <property type="protein sequence ID" value="QTZ44754.1"/>
    <property type="molecule type" value="Genomic_RNA"/>
</dbReference>
<dbReference type="EMBL" id="MW973666">
    <property type="protein sequence ID" value="QTZ44766.1"/>
    <property type="molecule type" value="Genomic_RNA"/>
</dbReference>
<dbReference type="EMBL" id="MW973667">
    <property type="protein sequence ID" value="QTZ44778.1"/>
    <property type="molecule type" value="Genomic_RNA"/>
</dbReference>
<dbReference type="EMBL" id="MW973668">
    <property type="protein sequence ID" value="QTZ44790.1"/>
    <property type="molecule type" value="Genomic_RNA"/>
</dbReference>
<dbReference type="EMBL" id="MW973669">
    <property type="protein sequence ID" value="QTZ44802.1"/>
    <property type="molecule type" value="Genomic_RNA"/>
</dbReference>
<dbReference type="EMBL" id="MW973670">
    <property type="protein sequence ID" value="QTZ44814.1"/>
    <property type="molecule type" value="Genomic_RNA"/>
</dbReference>
<dbReference type="EMBL" id="MW973671">
    <property type="protein sequence ID" value="QTZ44826.1"/>
    <property type="molecule type" value="Genomic_RNA"/>
</dbReference>
<dbReference type="EMBL" id="MW973672">
    <property type="protein sequence ID" value="QTZ44838.1"/>
    <property type="molecule type" value="Genomic_RNA"/>
</dbReference>
<dbReference type="EMBL" id="MW973673">
    <property type="protein sequence ID" value="QTZ44850.1"/>
    <property type="molecule type" value="Genomic_RNA"/>
</dbReference>
<dbReference type="EMBL" id="MW973674">
    <property type="protein sequence ID" value="QTZ44862.1"/>
    <property type="molecule type" value="Genomic_RNA"/>
</dbReference>
<dbReference type="EMBL" id="MW973675">
    <property type="protein sequence ID" value="QTZ44874.1"/>
    <property type="molecule type" value="Genomic_RNA"/>
</dbReference>
<dbReference type="EMBL" id="MW973676">
    <property type="protein sequence ID" value="QTZ44886.1"/>
    <property type="molecule type" value="Genomic_RNA"/>
</dbReference>
<dbReference type="EMBL" id="MW973677">
    <property type="protein sequence ID" value="QTZ44898.1"/>
    <property type="molecule type" value="Genomic_RNA"/>
</dbReference>
<dbReference type="EMBL" id="MW973678">
    <property type="protein sequence ID" value="QTZ44910.1"/>
    <property type="molecule type" value="Genomic_RNA"/>
</dbReference>
<dbReference type="EMBL" id="MW973680">
    <property type="protein sequence ID" value="QTZ44933.1"/>
    <property type="molecule type" value="Genomic_RNA"/>
</dbReference>
<dbReference type="EMBL" id="MW973681">
    <property type="protein sequence ID" value="QTZ44945.1"/>
    <property type="molecule type" value="Genomic_RNA"/>
</dbReference>
<dbReference type="EMBL" id="MW973682">
    <property type="protein sequence ID" value="QTZ44957.1"/>
    <property type="molecule type" value="Genomic_RNA"/>
</dbReference>
<dbReference type="EMBL" id="MW973683">
    <property type="protein sequence ID" value="QTZ44969.1"/>
    <property type="molecule type" value="Genomic_RNA"/>
</dbReference>
<dbReference type="EMBL" id="MW973685">
    <property type="protein sequence ID" value="QTZ44993.1"/>
    <property type="molecule type" value="Genomic_RNA"/>
</dbReference>
<dbReference type="EMBL" id="MW973686">
    <property type="protein sequence ID" value="QTZ45005.1"/>
    <property type="molecule type" value="Genomic_RNA"/>
</dbReference>
<dbReference type="EMBL" id="MW973687">
    <property type="protein sequence ID" value="QTZ45017.1"/>
    <property type="molecule type" value="Genomic_RNA"/>
</dbReference>
<dbReference type="EMBL" id="MW973688">
    <property type="protein sequence ID" value="QTZ45029.1"/>
    <property type="molecule type" value="Genomic_RNA"/>
</dbReference>
<dbReference type="EMBL" id="MW973689">
    <property type="protein sequence ID" value="QTZ45041.1"/>
    <property type="molecule type" value="Genomic_RNA"/>
</dbReference>
<dbReference type="EMBL" id="MW973690">
    <property type="protein sequence ID" value="QTZ45053.1"/>
    <property type="molecule type" value="Genomic_RNA"/>
</dbReference>
<dbReference type="EMBL" id="MW973691">
    <property type="protein sequence ID" value="QTZ45065.1"/>
    <property type="molecule type" value="Genomic_RNA"/>
</dbReference>
<dbReference type="EMBL" id="MW973692">
    <property type="protein sequence ID" value="QTZ45077.1"/>
    <property type="molecule type" value="Genomic_RNA"/>
</dbReference>
<dbReference type="EMBL" id="MW973693">
    <property type="protein sequence ID" value="QTZ45089.1"/>
    <property type="molecule type" value="Genomic_RNA"/>
</dbReference>
<dbReference type="EMBL" id="MW973694">
    <property type="protein sequence ID" value="QTZ45101.1"/>
    <property type="molecule type" value="Genomic_RNA"/>
</dbReference>
<dbReference type="EMBL" id="MW973695">
    <property type="protein sequence ID" value="QTZ45113.1"/>
    <property type="molecule type" value="Genomic_RNA"/>
</dbReference>
<dbReference type="EMBL" id="MW973696">
    <property type="protein sequence ID" value="QTZ45125.1"/>
    <property type="molecule type" value="Genomic_RNA"/>
</dbReference>
<dbReference type="EMBL" id="MW973697">
    <property type="protein sequence ID" value="QTZ45137.1"/>
    <property type="molecule type" value="Genomic_RNA"/>
</dbReference>
<dbReference type="EMBL" id="MW973698">
    <property type="protein sequence ID" value="QTZ45149.1"/>
    <property type="molecule type" value="Genomic_RNA"/>
</dbReference>
<dbReference type="EMBL" id="MW973699">
    <property type="protein sequence ID" value="QTZ45161.1"/>
    <property type="molecule type" value="Genomic_RNA"/>
</dbReference>
<dbReference type="EMBL" id="MW973700">
    <property type="protein sequence ID" value="QTZ45173.1"/>
    <property type="molecule type" value="Genomic_RNA"/>
</dbReference>
<dbReference type="EMBL" id="MW973703">
    <property type="protein sequence ID" value="QTZ45209.1"/>
    <property type="molecule type" value="Genomic_RNA"/>
</dbReference>
<dbReference type="EMBL" id="MW973704">
    <property type="protein sequence ID" value="QTZ45221.1"/>
    <property type="molecule type" value="Genomic_RNA"/>
</dbReference>
<dbReference type="EMBL" id="MW973705">
    <property type="protein sequence ID" value="QTZ45233.1"/>
    <property type="molecule type" value="Genomic_RNA"/>
</dbReference>
<dbReference type="EMBL" id="MW973706">
    <property type="protein sequence ID" value="QTZ45245.1"/>
    <property type="molecule type" value="Genomic_RNA"/>
</dbReference>
<dbReference type="EMBL" id="MW973707">
    <property type="protein sequence ID" value="QTZ45257.1"/>
    <property type="molecule type" value="Genomic_RNA"/>
</dbReference>
<dbReference type="EMBL" id="MW973708">
    <property type="protein sequence ID" value="QTZ45269.1"/>
    <property type="molecule type" value="Genomic_RNA"/>
</dbReference>
<dbReference type="EMBL" id="MW973709">
    <property type="protein sequence ID" value="QTZ45281.1"/>
    <property type="molecule type" value="Genomic_RNA"/>
</dbReference>
<dbReference type="EMBL" id="MW973710">
    <property type="protein sequence ID" value="QTZ45293.1"/>
    <property type="molecule type" value="Genomic_RNA"/>
</dbReference>
<dbReference type="EMBL" id="MW973711">
    <property type="protein sequence ID" value="QTZ45305.1"/>
    <property type="molecule type" value="Genomic_RNA"/>
</dbReference>
<dbReference type="EMBL" id="MW973712">
    <property type="protein sequence ID" value="QTZ45317.1"/>
    <property type="molecule type" value="Genomic_RNA"/>
</dbReference>
<dbReference type="EMBL" id="MW973713">
    <property type="protein sequence ID" value="QTZ45329.1"/>
    <property type="molecule type" value="Genomic_RNA"/>
</dbReference>
<dbReference type="EMBL" id="MW973714">
    <property type="protein sequence ID" value="QTZ45341.1"/>
    <property type="molecule type" value="Genomic_RNA"/>
</dbReference>
<dbReference type="EMBL" id="MW973715">
    <property type="protein sequence ID" value="QTZ45353.1"/>
    <property type="molecule type" value="Genomic_RNA"/>
</dbReference>
<dbReference type="EMBL" id="MW973716">
    <property type="protein sequence ID" value="QTZ45365.1"/>
    <property type="molecule type" value="Genomic_RNA"/>
</dbReference>
<dbReference type="EMBL" id="MW973717">
    <property type="protein sequence ID" value="QTZ45377.1"/>
    <property type="molecule type" value="Genomic_RNA"/>
</dbReference>
<dbReference type="EMBL" id="MW973718">
    <property type="protein sequence ID" value="QTZ45388.1"/>
    <property type="molecule type" value="Genomic_RNA"/>
</dbReference>
<dbReference type="EMBL" id="MW973719">
    <property type="protein sequence ID" value="QTZ45400.1"/>
    <property type="molecule type" value="Genomic_RNA"/>
</dbReference>
<dbReference type="EMBL" id="MW973720">
    <property type="protein sequence ID" value="QTZ45412.1"/>
    <property type="molecule type" value="Genomic_RNA"/>
</dbReference>
<dbReference type="EMBL" id="MW973721">
    <property type="protein sequence ID" value="QTZ45424.1"/>
    <property type="molecule type" value="Genomic_RNA"/>
</dbReference>
<dbReference type="EMBL" id="MW973722">
    <property type="protein sequence ID" value="QTZ45436.1"/>
    <property type="molecule type" value="Genomic_RNA"/>
</dbReference>
<dbReference type="EMBL" id="MW973723">
    <property type="protein sequence ID" value="QTZ45448.1"/>
    <property type="molecule type" value="Genomic_RNA"/>
</dbReference>
<dbReference type="EMBL" id="MW973724">
    <property type="protein sequence ID" value="QTZ45460.1"/>
    <property type="molecule type" value="Genomic_RNA"/>
</dbReference>
<dbReference type="EMBL" id="MW973725">
    <property type="protein sequence ID" value="QTZ45472.1"/>
    <property type="molecule type" value="Genomic_RNA"/>
</dbReference>
<dbReference type="EMBL" id="MW973726">
    <property type="protein sequence ID" value="QTZ45484.1"/>
    <property type="molecule type" value="Genomic_RNA"/>
</dbReference>
<dbReference type="EMBL" id="MW973727">
    <property type="protein sequence ID" value="QTZ45496.1"/>
    <property type="molecule type" value="Genomic_RNA"/>
</dbReference>
<dbReference type="EMBL" id="MW973728">
    <property type="protein sequence ID" value="QTZ45508.1"/>
    <property type="molecule type" value="Genomic_RNA"/>
</dbReference>
<dbReference type="EMBL" id="MW973729">
    <property type="protein sequence ID" value="QTZ45520.1"/>
    <property type="molecule type" value="Genomic_RNA"/>
</dbReference>
<dbReference type="EMBL" id="MW973730">
    <property type="protein sequence ID" value="QTZ45532.1"/>
    <property type="molecule type" value="Genomic_RNA"/>
</dbReference>
<dbReference type="EMBL" id="MW973731">
    <property type="protein sequence ID" value="QTZ45544.1"/>
    <property type="molecule type" value="Genomic_RNA"/>
</dbReference>
<dbReference type="EMBL" id="MW973732">
    <property type="protein sequence ID" value="QTZ45556.1"/>
    <property type="molecule type" value="Genomic_RNA"/>
</dbReference>
<dbReference type="EMBL" id="MW973733">
    <property type="protein sequence ID" value="QTZ45568.1"/>
    <property type="molecule type" value="Genomic_RNA"/>
</dbReference>
<dbReference type="EMBL" id="MW973734">
    <property type="protein sequence ID" value="QTZ45580.1"/>
    <property type="molecule type" value="Genomic_RNA"/>
</dbReference>
<dbReference type="EMBL" id="MW973735">
    <property type="protein sequence ID" value="QTZ45592.1"/>
    <property type="molecule type" value="Genomic_RNA"/>
</dbReference>
<dbReference type="EMBL" id="MW973736">
    <property type="protein sequence ID" value="QTZ45603.1"/>
    <property type="molecule type" value="Genomic_RNA"/>
</dbReference>
<dbReference type="EMBL" id="MW973737">
    <property type="protein sequence ID" value="QTZ45615.1"/>
    <property type="molecule type" value="Genomic_RNA"/>
</dbReference>
<dbReference type="EMBL" id="MW973738">
    <property type="protein sequence ID" value="QTZ45627.1"/>
    <property type="molecule type" value="Genomic_RNA"/>
</dbReference>
<dbReference type="EMBL" id="MW973739">
    <property type="protein sequence ID" value="QTZ45639.1"/>
    <property type="molecule type" value="Genomic_RNA"/>
</dbReference>
<dbReference type="EMBL" id="MW973740">
    <property type="protein sequence ID" value="QTZ45651.1"/>
    <property type="molecule type" value="Genomic_RNA"/>
</dbReference>
<dbReference type="EMBL" id="MW973741">
    <property type="protein sequence ID" value="QTZ45663.1"/>
    <property type="molecule type" value="Genomic_RNA"/>
</dbReference>
<dbReference type="EMBL" id="MW973742">
    <property type="protein sequence ID" value="QTZ45675.1"/>
    <property type="molecule type" value="Genomic_RNA"/>
</dbReference>
<dbReference type="EMBL" id="MW973743">
    <property type="protein sequence ID" value="QTZ45687.1"/>
    <property type="molecule type" value="Genomic_RNA"/>
</dbReference>
<dbReference type="EMBL" id="MW973744">
    <property type="protein sequence ID" value="QTZ45699.1"/>
    <property type="molecule type" value="Genomic_RNA"/>
</dbReference>
<dbReference type="EMBL" id="MW973745">
    <property type="protein sequence ID" value="QTZ45711.1"/>
    <property type="molecule type" value="Genomic_RNA"/>
</dbReference>
<dbReference type="EMBL" id="MW973746">
    <property type="protein sequence ID" value="QTZ45723.1"/>
    <property type="molecule type" value="Genomic_RNA"/>
</dbReference>
<dbReference type="EMBL" id="MW973747">
    <property type="protein sequence ID" value="QTZ45735.1"/>
    <property type="molecule type" value="Genomic_RNA"/>
</dbReference>
<dbReference type="EMBL" id="MW973748">
    <property type="protein sequence ID" value="QTZ45747.1"/>
    <property type="molecule type" value="Genomic_RNA"/>
</dbReference>
<dbReference type="EMBL" id="MW973749">
    <property type="protein sequence ID" value="QTZ45759.1"/>
    <property type="molecule type" value="Genomic_RNA"/>
</dbReference>
<dbReference type="EMBL" id="MW973750">
    <property type="protein sequence ID" value="QTZ45771.1"/>
    <property type="molecule type" value="Genomic_RNA"/>
</dbReference>
<dbReference type="EMBL" id="MW973751">
    <property type="protein sequence ID" value="QTZ45783.1"/>
    <property type="molecule type" value="Genomic_RNA"/>
</dbReference>
<dbReference type="EMBL" id="MW973752">
    <property type="protein sequence ID" value="QTZ45795.1"/>
    <property type="molecule type" value="Genomic_RNA"/>
</dbReference>
<dbReference type="EMBL" id="MW973753">
    <property type="protein sequence ID" value="QTZ45807.1"/>
    <property type="molecule type" value="Genomic_RNA"/>
</dbReference>
<dbReference type="EMBL" id="MW973754">
    <property type="protein sequence ID" value="QTZ45819.1"/>
    <property type="molecule type" value="Genomic_RNA"/>
</dbReference>
<dbReference type="EMBL" id="MW973755">
    <property type="protein sequence ID" value="QTZ45831.1"/>
    <property type="molecule type" value="Genomic_RNA"/>
</dbReference>
<dbReference type="EMBL" id="MW973756">
    <property type="protein sequence ID" value="QTZ45843.1"/>
    <property type="molecule type" value="Genomic_RNA"/>
</dbReference>
<dbReference type="EMBL" id="MW973757">
    <property type="protein sequence ID" value="QTZ45855.1"/>
    <property type="molecule type" value="Genomic_RNA"/>
</dbReference>
<dbReference type="EMBL" id="MW973758">
    <property type="protein sequence ID" value="QTZ45867.1"/>
    <property type="molecule type" value="Genomic_RNA"/>
</dbReference>
<dbReference type="EMBL" id="MW973759">
    <property type="protein sequence ID" value="QTZ45879.1"/>
    <property type="molecule type" value="Genomic_RNA"/>
</dbReference>
<dbReference type="EMBL" id="MW973760">
    <property type="protein sequence ID" value="QTZ45891.1"/>
    <property type="molecule type" value="Genomic_RNA"/>
</dbReference>
<dbReference type="EMBL" id="MW973761">
    <property type="protein sequence ID" value="QTZ45903.1"/>
    <property type="molecule type" value="Genomic_RNA"/>
</dbReference>
<dbReference type="EMBL" id="MW973762">
    <property type="protein sequence ID" value="QTZ45915.1"/>
    <property type="molecule type" value="Genomic_RNA"/>
</dbReference>
<dbReference type="EMBL" id="MW973763">
    <property type="protein sequence ID" value="QTZ45927.1"/>
    <property type="molecule type" value="Genomic_RNA"/>
</dbReference>
<dbReference type="EMBL" id="MW973764">
    <property type="protein sequence ID" value="QTZ45939.1"/>
    <property type="molecule type" value="Genomic_RNA"/>
</dbReference>
<dbReference type="EMBL" id="MW973765">
    <property type="protein sequence ID" value="QTZ45951.1"/>
    <property type="molecule type" value="Genomic_RNA"/>
</dbReference>
<dbReference type="EMBL" id="MW973766">
    <property type="protein sequence ID" value="QTZ45963.1"/>
    <property type="molecule type" value="Genomic_RNA"/>
</dbReference>
<dbReference type="EMBL" id="MW973767">
    <property type="protein sequence ID" value="QTZ45975.1"/>
    <property type="molecule type" value="Genomic_RNA"/>
</dbReference>
<dbReference type="EMBL" id="MW973768">
    <property type="protein sequence ID" value="QTZ45987.1"/>
    <property type="molecule type" value="Genomic_RNA"/>
</dbReference>
<dbReference type="EMBL" id="MW973769">
    <property type="protein sequence ID" value="QTZ45999.1"/>
    <property type="molecule type" value="Genomic_RNA"/>
</dbReference>
<dbReference type="EMBL" id="MW973770">
    <property type="protein sequence ID" value="QTZ46011.1"/>
    <property type="molecule type" value="Genomic_RNA"/>
</dbReference>
<dbReference type="EMBL" id="MW973771">
    <property type="protein sequence ID" value="QTZ46023.1"/>
    <property type="molecule type" value="Genomic_RNA"/>
</dbReference>
<dbReference type="EMBL" id="MW973772">
    <property type="protein sequence ID" value="QTZ46035.1"/>
    <property type="molecule type" value="Genomic_RNA"/>
</dbReference>
<dbReference type="EMBL" id="MW973773">
    <property type="protein sequence ID" value="QTZ46047.1"/>
    <property type="molecule type" value="Genomic_RNA"/>
</dbReference>
<dbReference type="EMBL" id="MW973774">
    <property type="protein sequence ID" value="QTZ46059.1"/>
    <property type="molecule type" value="Genomic_RNA"/>
</dbReference>
<dbReference type="EMBL" id="MW973775">
    <property type="protein sequence ID" value="QTZ46071.1"/>
    <property type="molecule type" value="Genomic_RNA"/>
</dbReference>
<dbReference type="EMBL" id="MW973776">
    <property type="protein sequence ID" value="QTZ46083.1"/>
    <property type="molecule type" value="Genomic_RNA"/>
</dbReference>
<dbReference type="EMBL" id="MW973777">
    <property type="protein sequence ID" value="QTZ46095.1"/>
    <property type="molecule type" value="Genomic_RNA"/>
</dbReference>
<dbReference type="EMBL" id="MW973778">
    <property type="protein sequence ID" value="QTZ46107.1"/>
    <property type="molecule type" value="Genomic_RNA"/>
</dbReference>
<dbReference type="EMBL" id="MW973779">
    <property type="protein sequence ID" value="QTZ46119.1"/>
    <property type="molecule type" value="Genomic_RNA"/>
</dbReference>
<dbReference type="EMBL" id="MW973780">
    <property type="protein sequence ID" value="QTZ46131.1"/>
    <property type="molecule type" value="Genomic_RNA"/>
</dbReference>
<dbReference type="EMBL" id="MW973781">
    <property type="protein sequence ID" value="QTZ46143.1"/>
    <property type="molecule type" value="Genomic_RNA"/>
</dbReference>
<dbReference type="EMBL" id="MW973782">
    <property type="protein sequence ID" value="QTZ46155.1"/>
    <property type="molecule type" value="Genomic_RNA"/>
</dbReference>
<dbReference type="EMBL" id="MW973783">
    <property type="protein sequence ID" value="QTZ46167.1"/>
    <property type="molecule type" value="Genomic_RNA"/>
</dbReference>
<dbReference type="EMBL" id="MW973784">
    <property type="protein sequence ID" value="QTZ46179.1"/>
    <property type="molecule type" value="Genomic_RNA"/>
</dbReference>
<dbReference type="EMBL" id="MW973785">
    <property type="protein sequence ID" value="QTZ46191.1"/>
    <property type="molecule type" value="Genomic_RNA"/>
</dbReference>
<dbReference type="EMBL" id="MW973786">
    <property type="protein sequence ID" value="QTZ46203.1"/>
    <property type="molecule type" value="Genomic_RNA"/>
</dbReference>
<dbReference type="EMBL" id="MW973787">
    <property type="protein sequence ID" value="QTZ46215.1"/>
    <property type="molecule type" value="Genomic_RNA"/>
</dbReference>
<dbReference type="EMBL" id="MW973788">
    <property type="protein sequence ID" value="QTZ46227.1"/>
    <property type="molecule type" value="Genomic_RNA"/>
</dbReference>
<dbReference type="EMBL" id="MW973789">
    <property type="protein sequence ID" value="QTZ46239.1"/>
    <property type="molecule type" value="Genomic_RNA"/>
</dbReference>
<dbReference type="EMBL" id="MW973790">
    <property type="protein sequence ID" value="QTZ46251.1"/>
    <property type="molecule type" value="Genomic_RNA"/>
</dbReference>
<dbReference type="EMBL" id="MW973791">
    <property type="protein sequence ID" value="QTZ46263.1"/>
    <property type="molecule type" value="Genomic_RNA"/>
</dbReference>
<dbReference type="EMBL" id="MW973792">
    <property type="protein sequence ID" value="QTZ46275.1"/>
    <property type="molecule type" value="Genomic_RNA"/>
</dbReference>
<dbReference type="EMBL" id="MW973793">
    <property type="protein sequence ID" value="QTZ46287.1"/>
    <property type="molecule type" value="Genomic_RNA"/>
</dbReference>
<dbReference type="EMBL" id="MW973794">
    <property type="protein sequence ID" value="QTZ46299.1"/>
    <property type="molecule type" value="Genomic_RNA"/>
</dbReference>
<dbReference type="EMBL" id="MW973795">
    <property type="protein sequence ID" value="QTZ46311.1"/>
    <property type="molecule type" value="Genomic_RNA"/>
</dbReference>
<dbReference type="EMBL" id="MW973796">
    <property type="protein sequence ID" value="QTZ46323.1"/>
    <property type="molecule type" value="Genomic_RNA"/>
</dbReference>
<dbReference type="EMBL" id="MW973797">
    <property type="protein sequence ID" value="QTZ46335.1"/>
    <property type="molecule type" value="Genomic_RNA"/>
</dbReference>
<dbReference type="EMBL" id="MW973798">
    <property type="protein sequence ID" value="QTZ46347.1"/>
    <property type="molecule type" value="Genomic_RNA"/>
</dbReference>
<dbReference type="EMBL" id="MW973799">
    <property type="protein sequence ID" value="QTZ46359.1"/>
    <property type="molecule type" value="Genomic_RNA"/>
</dbReference>
<dbReference type="EMBL" id="MW973800">
    <property type="protein sequence ID" value="QTZ46371.1"/>
    <property type="molecule type" value="Genomic_RNA"/>
</dbReference>
<dbReference type="EMBL" id="MW973801">
    <property type="protein sequence ID" value="QTZ46383.1"/>
    <property type="molecule type" value="Genomic_RNA"/>
</dbReference>
<dbReference type="EMBL" id="MW973802">
    <property type="protein sequence ID" value="QTZ46395.1"/>
    <property type="molecule type" value="Genomic_RNA"/>
</dbReference>
<dbReference type="EMBL" id="MW973803">
    <property type="protein sequence ID" value="QTZ46407.1"/>
    <property type="molecule type" value="Genomic_RNA"/>
</dbReference>
<dbReference type="EMBL" id="MW973804">
    <property type="protein sequence ID" value="QTZ46419.1"/>
    <property type="molecule type" value="Genomic_RNA"/>
</dbReference>
<dbReference type="EMBL" id="MW973805">
    <property type="protein sequence ID" value="QTZ46431.1"/>
    <property type="molecule type" value="Genomic_RNA"/>
</dbReference>
<dbReference type="EMBL" id="MW973806">
    <property type="protein sequence ID" value="QTZ46443.1"/>
    <property type="molecule type" value="Genomic_RNA"/>
</dbReference>
<dbReference type="EMBL" id="MW973807">
    <property type="protein sequence ID" value="QTZ46455.1"/>
    <property type="molecule type" value="Genomic_RNA"/>
</dbReference>
<dbReference type="EMBL" id="MW973808">
    <property type="protein sequence ID" value="QTZ46467.1"/>
    <property type="molecule type" value="Genomic_RNA"/>
</dbReference>
<dbReference type="EMBL" id="MW973809">
    <property type="protein sequence ID" value="QTZ46479.1"/>
    <property type="molecule type" value="Genomic_RNA"/>
</dbReference>
<dbReference type="EMBL" id="MW973810">
    <property type="protein sequence ID" value="QTZ46491.1"/>
    <property type="molecule type" value="Genomic_RNA"/>
</dbReference>
<dbReference type="EMBL" id="MW973811">
    <property type="protein sequence ID" value="QTZ46503.1"/>
    <property type="molecule type" value="Genomic_RNA"/>
</dbReference>
<dbReference type="EMBL" id="MW973812">
    <property type="protein sequence ID" value="QTZ46515.1"/>
    <property type="molecule type" value="Genomic_RNA"/>
</dbReference>
<dbReference type="EMBL" id="MW973813">
    <property type="protein sequence ID" value="QTZ46527.1"/>
    <property type="molecule type" value="Genomic_RNA"/>
</dbReference>
<dbReference type="EMBL" id="MW973814">
    <property type="protein sequence ID" value="QTZ46539.1"/>
    <property type="molecule type" value="Genomic_RNA"/>
</dbReference>
<dbReference type="EMBL" id="MW973815">
    <property type="protein sequence ID" value="QTZ46551.1"/>
    <property type="molecule type" value="Genomic_RNA"/>
</dbReference>
<dbReference type="EMBL" id="MW973816">
    <property type="protein sequence ID" value="QTZ46563.1"/>
    <property type="molecule type" value="Genomic_RNA"/>
</dbReference>
<dbReference type="EMBL" id="MW973817">
    <property type="protein sequence ID" value="QTZ46575.1"/>
    <property type="molecule type" value="Genomic_RNA"/>
</dbReference>
<dbReference type="EMBL" id="MW973818">
    <property type="protein sequence ID" value="QTZ46587.1"/>
    <property type="molecule type" value="Genomic_RNA"/>
</dbReference>
<dbReference type="EMBL" id="MW973819">
    <property type="protein sequence ID" value="QTZ46599.1"/>
    <property type="molecule type" value="Genomic_RNA"/>
</dbReference>
<dbReference type="EMBL" id="MW973820">
    <property type="protein sequence ID" value="QTZ46611.1"/>
    <property type="molecule type" value="Genomic_RNA"/>
</dbReference>
<dbReference type="EMBL" id="MW973821">
    <property type="protein sequence ID" value="QTZ46623.1"/>
    <property type="molecule type" value="Genomic_RNA"/>
</dbReference>
<dbReference type="EMBL" id="MW973822">
    <property type="protein sequence ID" value="QTZ46635.1"/>
    <property type="molecule type" value="Genomic_RNA"/>
</dbReference>
<dbReference type="EMBL" id="MW973823">
    <property type="protein sequence ID" value="QTZ46647.1"/>
    <property type="molecule type" value="Genomic_RNA"/>
</dbReference>
<dbReference type="EMBL" id="MW973824">
    <property type="protein sequence ID" value="QTZ46659.1"/>
    <property type="molecule type" value="Genomic_RNA"/>
</dbReference>
<dbReference type="EMBL" id="MW973825">
    <property type="protein sequence ID" value="QTZ46671.1"/>
    <property type="molecule type" value="Genomic_RNA"/>
</dbReference>
<dbReference type="EMBL" id="MW973826">
    <property type="protein sequence ID" value="QTZ46683.1"/>
    <property type="molecule type" value="Genomic_RNA"/>
</dbReference>
<dbReference type="EMBL" id="MW973827">
    <property type="protein sequence ID" value="QTZ46695.1"/>
    <property type="molecule type" value="Genomic_RNA"/>
</dbReference>
<dbReference type="EMBL" id="MW973828">
    <property type="protein sequence ID" value="QTZ46707.1"/>
    <property type="molecule type" value="Genomic_RNA"/>
</dbReference>
<dbReference type="EMBL" id="MW973829">
    <property type="protein sequence ID" value="QTZ46719.1"/>
    <property type="molecule type" value="Genomic_RNA"/>
</dbReference>
<dbReference type="EMBL" id="MW973830">
    <property type="protein sequence ID" value="QTZ46731.1"/>
    <property type="molecule type" value="Genomic_RNA"/>
</dbReference>
<dbReference type="EMBL" id="MW973831">
    <property type="protein sequence ID" value="QTZ46743.1"/>
    <property type="molecule type" value="Genomic_RNA"/>
</dbReference>
<dbReference type="EMBL" id="MW973832">
    <property type="protein sequence ID" value="QTZ46755.1"/>
    <property type="molecule type" value="Genomic_RNA"/>
</dbReference>
<dbReference type="EMBL" id="MW973833">
    <property type="protein sequence ID" value="QTZ46767.1"/>
    <property type="molecule type" value="Genomic_RNA"/>
</dbReference>
<dbReference type="EMBL" id="MW973834">
    <property type="protein sequence ID" value="QTZ46779.1"/>
    <property type="molecule type" value="Genomic_RNA"/>
</dbReference>
<dbReference type="EMBL" id="MW973835">
    <property type="protein sequence ID" value="QTZ46791.1"/>
    <property type="molecule type" value="Genomic_RNA"/>
</dbReference>
<dbReference type="EMBL" id="MW973836">
    <property type="protein sequence ID" value="QTZ46803.1"/>
    <property type="molecule type" value="Genomic_RNA"/>
</dbReference>
<dbReference type="EMBL" id="MW973837">
    <property type="protein sequence ID" value="QTZ46815.1"/>
    <property type="molecule type" value="Genomic_RNA"/>
</dbReference>
<dbReference type="EMBL" id="MW973838">
    <property type="protein sequence ID" value="QTZ46827.1"/>
    <property type="molecule type" value="Genomic_RNA"/>
</dbReference>
<dbReference type="EMBL" id="MW973839">
    <property type="protein sequence ID" value="QTZ46839.1"/>
    <property type="molecule type" value="Genomic_RNA"/>
</dbReference>
<dbReference type="EMBL" id="MW973840">
    <property type="protein sequence ID" value="QTZ46851.1"/>
    <property type="molecule type" value="Genomic_RNA"/>
</dbReference>
<dbReference type="EMBL" id="MW973841">
    <property type="protein sequence ID" value="QTZ46863.1"/>
    <property type="molecule type" value="Genomic_RNA"/>
</dbReference>
<dbReference type="EMBL" id="MW973842">
    <property type="protein sequence ID" value="QTZ46875.1"/>
    <property type="molecule type" value="Genomic_RNA"/>
</dbReference>
<dbReference type="EMBL" id="MW973843">
    <property type="protein sequence ID" value="QTZ46887.1"/>
    <property type="molecule type" value="Genomic_RNA"/>
</dbReference>
<dbReference type="EMBL" id="MW973844">
    <property type="protein sequence ID" value="QTZ46899.1"/>
    <property type="molecule type" value="Genomic_RNA"/>
</dbReference>
<dbReference type="EMBL" id="MW973845">
    <property type="protein sequence ID" value="QTZ46911.1"/>
    <property type="molecule type" value="Genomic_RNA"/>
</dbReference>
<dbReference type="EMBL" id="MW973846">
    <property type="protein sequence ID" value="QTZ46923.1"/>
    <property type="molecule type" value="Genomic_RNA"/>
</dbReference>
<dbReference type="EMBL" id="MW973847">
    <property type="protein sequence ID" value="QTZ46935.1"/>
    <property type="molecule type" value="Genomic_RNA"/>
</dbReference>
<dbReference type="EMBL" id="MW973848">
    <property type="protein sequence ID" value="QTZ46947.1"/>
    <property type="molecule type" value="Genomic_RNA"/>
</dbReference>
<dbReference type="EMBL" id="MW973849">
    <property type="protein sequence ID" value="QTZ46959.1"/>
    <property type="molecule type" value="Genomic_RNA"/>
</dbReference>
<dbReference type="EMBL" id="MW973850">
    <property type="protein sequence ID" value="QTZ46971.1"/>
    <property type="molecule type" value="Genomic_RNA"/>
</dbReference>
<dbReference type="EMBL" id="MW973851">
    <property type="protein sequence ID" value="QTZ46983.1"/>
    <property type="molecule type" value="Genomic_RNA"/>
</dbReference>
<dbReference type="EMBL" id="MW973852">
    <property type="protein sequence ID" value="QTZ46995.1"/>
    <property type="molecule type" value="Genomic_RNA"/>
</dbReference>
<dbReference type="EMBL" id="MW973853">
    <property type="protein sequence ID" value="QTZ47007.1"/>
    <property type="molecule type" value="Genomic_RNA"/>
</dbReference>
<dbReference type="EMBL" id="MW973854">
    <property type="protein sequence ID" value="QTZ47019.1"/>
    <property type="molecule type" value="Genomic_RNA"/>
</dbReference>
<dbReference type="EMBL" id="MW973855">
    <property type="protein sequence ID" value="QTZ47031.1"/>
    <property type="molecule type" value="Genomic_RNA"/>
</dbReference>
<dbReference type="EMBL" id="MW973856">
    <property type="protein sequence ID" value="QTZ47043.1"/>
    <property type="molecule type" value="Genomic_RNA"/>
</dbReference>
<dbReference type="EMBL" id="MW973857">
    <property type="protein sequence ID" value="QTZ47055.1"/>
    <property type="molecule type" value="Genomic_RNA"/>
</dbReference>
<dbReference type="EMBL" id="MW973858">
    <property type="protein sequence ID" value="QTZ47067.1"/>
    <property type="molecule type" value="Genomic_RNA"/>
</dbReference>
<dbReference type="EMBL" id="MW973859">
    <property type="protein sequence ID" value="QTZ47079.1"/>
    <property type="molecule type" value="Genomic_RNA"/>
</dbReference>
<dbReference type="EMBL" id="MW973860">
    <property type="protein sequence ID" value="QTZ47091.1"/>
    <property type="molecule type" value="Genomic_RNA"/>
</dbReference>
<dbReference type="EMBL" id="MW973861">
    <property type="protein sequence ID" value="QTZ47103.1"/>
    <property type="molecule type" value="Genomic_RNA"/>
</dbReference>
<dbReference type="EMBL" id="MW973862">
    <property type="protein sequence ID" value="QTZ47115.1"/>
    <property type="molecule type" value="Genomic_RNA"/>
</dbReference>
<dbReference type="EMBL" id="MW973863">
    <property type="protein sequence ID" value="QTZ47127.1"/>
    <property type="molecule type" value="Genomic_RNA"/>
</dbReference>
<dbReference type="EMBL" id="MW973864">
    <property type="protein sequence ID" value="QTZ47139.1"/>
    <property type="molecule type" value="Genomic_RNA"/>
</dbReference>
<dbReference type="EMBL" id="MW973865">
    <property type="protein sequence ID" value="QTZ47151.1"/>
    <property type="molecule type" value="Genomic_RNA"/>
</dbReference>
<dbReference type="EMBL" id="MW973866">
    <property type="protein sequence ID" value="QTZ47163.1"/>
    <property type="molecule type" value="Genomic_RNA"/>
</dbReference>
<dbReference type="EMBL" id="MW973867">
    <property type="protein sequence ID" value="QTZ47175.1"/>
    <property type="molecule type" value="Genomic_RNA"/>
</dbReference>
<dbReference type="EMBL" id="MW973868">
    <property type="protein sequence ID" value="QTZ47187.1"/>
    <property type="molecule type" value="Genomic_RNA"/>
</dbReference>
<dbReference type="EMBL" id="MW973869">
    <property type="protein sequence ID" value="QTZ47199.1"/>
    <property type="molecule type" value="Genomic_RNA"/>
</dbReference>
<dbReference type="EMBL" id="MW973870">
    <property type="protein sequence ID" value="QTZ47211.1"/>
    <property type="molecule type" value="Genomic_RNA"/>
</dbReference>
<dbReference type="EMBL" id="MW973871">
    <property type="protein sequence ID" value="QTZ47223.1"/>
    <property type="molecule type" value="Genomic_RNA"/>
</dbReference>
<dbReference type="EMBL" id="MW973872">
    <property type="protein sequence ID" value="QTZ47235.1"/>
    <property type="molecule type" value="Genomic_RNA"/>
</dbReference>
<dbReference type="EMBL" id="MW973873">
    <property type="protein sequence ID" value="QTZ47247.1"/>
    <property type="molecule type" value="Genomic_RNA"/>
</dbReference>
<dbReference type="EMBL" id="MW973874">
    <property type="protein sequence ID" value="QTZ47259.1"/>
    <property type="molecule type" value="Genomic_RNA"/>
</dbReference>
<dbReference type="EMBL" id="MW973875">
    <property type="protein sequence ID" value="QTZ47271.1"/>
    <property type="molecule type" value="Genomic_RNA"/>
</dbReference>
<dbReference type="EMBL" id="MW973876">
    <property type="protein sequence ID" value="QTZ47283.1"/>
    <property type="molecule type" value="Genomic_RNA"/>
</dbReference>
<dbReference type="EMBL" id="MW973877">
    <property type="protein sequence ID" value="QTZ47295.1"/>
    <property type="molecule type" value="Genomic_RNA"/>
</dbReference>
<dbReference type="EMBL" id="MW973878">
    <property type="protein sequence ID" value="QTZ47307.1"/>
    <property type="molecule type" value="Genomic_RNA"/>
</dbReference>
<dbReference type="EMBL" id="MW973879">
    <property type="protein sequence ID" value="QTZ47319.1"/>
    <property type="molecule type" value="Genomic_RNA"/>
</dbReference>
<dbReference type="EMBL" id="MW973880">
    <property type="protein sequence ID" value="QTZ47331.1"/>
    <property type="molecule type" value="Genomic_RNA"/>
</dbReference>
<dbReference type="EMBL" id="MW973881">
    <property type="protein sequence ID" value="QTZ47343.1"/>
    <property type="molecule type" value="Genomic_RNA"/>
</dbReference>
<dbReference type="EMBL" id="MW973882">
    <property type="protein sequence ID" value="QTZ47355.1"/>
    <property type="molecule type" value="Genomic_RNA"/>
</dbReference>
<dbReference type="EMBL" id="MW973883">
    <property type="protein sequence ID" value="QTZ47367.1"/>
    <property type="molecule type" value="Genomic_RNA"/>
</dbReference>
<dbReference type="EMBL" id="MW973884">
    <property type="protein sequence ID" value="QTZ47379.1"/>
    <property type="molecule type" value="Genomic_RNA"/>
</dbReference>
<dbReference type="EMBL" id="MW973885">
    <property type="protein sequence ID" value="QTZ47391.1"/>
    <property type="molecule type" value="Genomic_RNA"/>
</dbReference>
<dbReference type="EMBL" id="MW973886">
    <property type="protein sequence ID" value="QTZ47403.1"/>
    <property type="molecule type" value="Genomic_RNA"/>
</dbReference>
<dbReference type="EMBL" id="MW973887">
    <property type="protein sequence ID" value="QTZ47415.1"/>
    <property type="molecule type" value="Genomic_RNA"/>
</dbReference>
<dbReference type="EMBL" id="MW973888">
    <property type="protein sequence ID" value="QTZ47427.1"/>
    <property type="molecule type" value="Genomic_RNA"/>
</dbReference>
<dbReference type="EMBL" id="MW973889">
    <property type="protein sequence ID" value="QTZ47439.1"/>
    <property type="molecule type" value="Genomic_RNA"/>
</dbReference>
<dbReference type="EMBL" id="MW973890">
    <property type="protein sequence ID" value="QTZ47451.1"/>
    <property type="molecule type" value="Genomic_RNA"/>
</dbReference>
<dbReference type="EMBL" id="MW973891">
    <property type="protein sequence ID" value="QTZ47462.1"/>
    <property type="molecule type" value="Genomic_RNA"/>
</dbReference>
<dbReference type="EMBL" id="MW973892">
    <property type="protein sequence ID" value="QTZ47474.1"/>
    <property type="molecule type" value="Genomic_RNA"/>
</dbReference>
<dbReference type="EMBL" id="MW973893">
    <property type="protein sequence ID" value="QTZ47486.1"/>
    <property type="molecule type" value="Genomic_RNA"/>
</dbReference>
<dbReference type="EMBL" id="MW973894">
    <property type="protein sequence ID" value="QTZ47498.1"/>
    <property type="molecule type" value="Genomic_RNA"/>
</dbReference>
<dbReference type="EMBL" id="MW973895">
    <property type="protein sequence ID" value="QTZ47510.1"/>
    <property type="molecule type" value="Genomic_RNA"/>
</dbReference>
<dbReference type="EMBL" id="MW973896">
    <property type="protein sequence ID" value="QTZ47522.1"/>
    <property type="molecule type" value="Genomic_RNA"/>
</dbReference>
<dbReference type="EMBL" id="MW973897">
    <property type="protein sequence ID" value="QTZ47534.1"/>
    <property type="molecule type" value="Genomic_RNA"/>
</dbReference>
<dbReference type="EMBL" id="MW973898">
    <property type="protein sequence ID" value="QTZ47546.1"/>
    <property type="molecule type" value="Genomic_RNA"/>
</dbReference>
<dbReference type="EMBL" id="MW973899">
    <property type="protein sequence ID" value="QTZ47558.1"/>
    <property type="molecule type" value="Genomic_RNA"/>
</dbReference>
<dbReference type="EMBL" id="MW973900">
    <property type="protein sequence ID" value="QTZ47570.1"/>
    <property type="molecule type" value="Genomic_RNA"/>
</dbReference>
<dbReference type="EMBL" id="MW973901">
    <property type="protein sequence ID" value="QTZ47582.1"/>
    <property type="molecule type" value="Genomic_RNA"/>
</dbReference>
<dbReference type="EMBL" id="MW973902">
    <property type="protein sequence ID" value="QTZ47594.1"/>
    <property type="molecule type" value="Genomic_RNA"/>
</dbReference>
<dbReference type="EMBL" id="MW973903">
    <property type="protein sequence ID" value="QTZ47606.1"/>
    <property type="molecule type" value="Genomic_RNA"/>
</dbReference>
<dbReference type="EMBL" id="MW973904">
    <property type="protein sequence ID" value="QTZ47618.1"/>
    <property type="molecule type" value="Genomic_RNA"/>
</dbReference>
<dbReference type="EMBL" id="MW973905">
    <property type="protein sequence ID" value="QTZ47630.1"/>
    <property type="molecule type" value="Genomic_RNA"/>
</dbReference>
<dbReference type="EMBL" id="MW973906">
    <property type="protein sequence ID" value="QTZ47642.1"/>
    <property type="molecule type" value="Genomic_RNA"/>
</dbReference>
<dbReference type="EMBL" id="MW973907">
    <property type="protein sequence ID" value="QTZ47654.1"/>
    <property type="molecule type" value="Genomic_RNA"/>
</dbReference>
<dbReference type="EMBL" id="MW973908">
    <property type="protein sequence ID" value="QTZ47666.1"/>
    <property type="molecule type" value="Genomic_RNA"/>
</dbReference>
<dbReference type="EMBL" id="MW973909">
    <property type="protein sequence ID" value="QTZ47678.1"/>
    <property type="molecule type" value="Genomic_RNA"/>
</dbReference>
<dbReference type="EMBL" id="MW973910">
    <property type="protein sequence ID" value="QTZ47690.1"/>
    <property type="molecule type" value="Genomic_RNA"/>
</dbReference>
<dbReference type="EMBL" id="MW973911">
    <property type="protein sequence ID" value="QTZ47702.1"/>
    <property type="molecule type" value="Genomic_RNA"/>
</dbReference>
<dbReference type="EMBL" id="MW973912">
    <property type="protein sequence ID" value="QTZ47714.1"/>
    <property type="molecule type" value="Genomic_RNA"/>
</dbReference>
<dbReference type="EMBL" id="MW973913">
    <property type="protein sequence ID" value="QTZ47725.1"/>
    <property type="molecule type" value="Genomic_RNA"/>
</dbReference>
<dbReference type="EMBL" id="MW973914">
    <property type="protein sequence ID" value="QTZ47737.1"/>
    <property type="molecule type" value="Genomic_RNA"/>
</dbReference>
<dbReference type="EMBL" id="MW973915">
    <property type="protein sequence ID" value="QTZ47749.1"/>
    <property type="molecule type" value="Genomic_RNA"/>
</dbReference>
<dbReference type="EMBL" id="MW973916">
    <property type="protein sequence ID" value="QTZ47761.1"/>
    <property type="molecule type" value="Genomic_RNA"/>
</dbReference>
<dbReference type="EMBL" id="MW973917">
    <property type="protein sequence ID" value="QTZ47773.1"/>
    <property type="molecule type" value="Genomic_RNA"/>
</dbReference>
<dbReference type="EMBL" id="MW973918">
    <property type="protein sequence ID" value="QTZ47785.1"/>
    <property type="molecule type" value="Genomic_RNA"/>
</dbReference>
<dbReference type="EMBL" id="MW973919">
    <property type="protein sequence ID" value="QTZ47797.1"/>
    <property type="molecule type" value="Genomic_RNA"/>
</dbReference>
<dbReference type="EMBL" id="MW973920">
    <property type="protein sequence ID" value="QTZ47809.1"/>
    <property type="molecule type" value="Genomic_RNA"/>
</dbReference>
<dbReference type="EMBL" id="MW973921">
    <property type="protein sequence ID" value="QTZ47821.1"/>
    <property type="molecule type" value="Genomic_RNA"/>
</dbReference>
<dbReference type="EMBL" id="MW973922">
    <property type="protein sequence ID" value="QTZ47833.1"/>
    <property type="molecule type" value="Genomic_RNA"/>
</dbReference>
<dbReference type="EMBL" id="MW973923">
    <property type="protein sequence ID" value="QTZ47845.1"/>
    <property type="molecule type" value="Genomic_RNA"/>
</dbReference>
<dbReference type="EMBL" id="MW973924">
    <property type="protein sequence ID" value="QTZ47857.1"/>
    <property type="molecule type" value="Genomic_RNA"/>
</dbReference>
<dbReference type="EMBL" id="MW973925">
    <property type="protein sequence ID" value="QTZ47869.1"/>
    <property type="molecule type" value="Genomic_RNA"/>
</dbReference>
<dbReference type="EMBL" id="MW973926">
    <property type="protein sequence ID" value="QTZ47881.1"/>
    <property type="molecule type" value="Genomic_RNA"/>
</dbReference>
<dbReference type="EMBL" id="MW973927">
    <property type="protein sequence ID" value="QTZ47893.1"/>
    <property type="molecule type" value="Genomic_RNA"/>
</dbReference>
<dbReference type="EMBL" id="MW973928">
    <property type="protein sequence ID" value="QTZ47905.1"/>
    <property type="molecule type" value="Genomic_RNA"/>
</dbReference>
<dbReference type="EMBL" id="MW973929">
    <property type="protein sequence ID" value="QTZ47917.1"/>
    <property type="molecule type" value="Genomic_RNA"/>
</dbReference>
<dbReference type="EMBL" id="MW973930">
    <property type="protein sequence ID" value="QTZ47929.1"/>
    <property type="molecule type" value="Genomic_RNA"/>
</dbReference>
<dbReference type="EMBL" id="MW973931">
    <property type="protein sequence ID" value="QTZ47941.1"/>
    <property type="molecule type" value="Genomic_RNA"/>
</dbReference>
<dbReference type="EMBL" id="MW973932">
    <property type="protein sequence ID" value="QTZ47953.1"/>
    <property type="molecule type" value="Genomic_RNA"/>
</dbReference>
<dbReference type="EMBL" id="MW973933">
    <property type="protein sequence ID" value="QTZ47965.1"/>
    <property type="molecule type" value="Genomic_RNA"/>
</dbReference>
<dbReference type="EMBL" id="MW973934">
    <property type="protein sequence ID" value="QTZ47977.1"/>
    <property type="molecule type" value="Genomic_RNA"/>
</dbReference>
<dbReference type="EMBL" id="MW973935">
    <property type="protein sequence ID" value="QTZ47989.1"/>
    <property type="molecule type" value="Genomic_RNA"/>
</dbReference>
<dbReference type="EMBL" id="MW973936">
    <property type="protein sequence ID" value="QTZ48001.1"/>
    <property type="molecule type" value="Genomic_RNA"/>
</dbReference>
<dbReference type="EMBL" id="MW973937">
    <property type="protein sequence ID" value="QTZ48013.1"/>
    <property type="molecule type" value="Genomic_RNA"/>
</dbReference>
<dbReference type="EMBL" id="MW973938">
    <property type="protein sequence ID" value="QTZ48025.1"/>
    <property type="molecule type" value="Genomic_RNA"/>
</dbReference>
<dbReference type="EMBL" id="MW973939">
    <property type="protein sequence ID" value="QTZ48037.1"/>
    <property type="molecule type" value="Genomic_RNA"/>
</dbReference>
<dbReference type="EMBL" id="MW973940">
    <property type="protein sequence ID" value="QTZ48049.1"/>
    <property type="molecule type" value="Genomic_RNA"/>
</dbReference>
<dbReference type="EMBL" id="MW973941">
    <property type="protein sequence ID" value="QTZ48061.1"/>
    <property type="molecule type" value="Genomic_RNA"/>
</dbReference>
<dbReference type="EMBL" id="MW973942">
    <property type="protein sequence ID" value="QTZ48073.1"/>
    <property type="molecule type" value="Genomic_RNA"/>
</dbReference>
<dbReference type="EMBL" id="MW973943">
    <property type="protein sequence ID" value="QTZ48085.1"/>
    <property type="molecule type" value="Genomic_RNA"/>
</dbReference>
<dbReference type="EMBL" id="MW973944">
    <property type="protein sequence ID" value="QTZ48097.1"/>
    <property type="molecule type" value="Genomic_RNA"/>
</dbReference>
<dbReference type="EMBL" id="MW973945">
    <property type="protein sequence ID" value="QTZ48109.1"/>
    <property type="molecule type" value="Genomic_RNA"/>
</dbReference>
<dbReference type="EMBL" id="MW973946">
    <property type="protein sequence ID" value="QTZ48121.1"/>
    <property type="molecule type" value="Genomic_RNA"/>
</dbReference>
<dbReference type="EMBL" id="MW973947">
    <property type="protein sequence ID" value="QTZ48132.1"/>
    <property type="molecule type" value="Genomic_RNA"/>
</dbReference>
<dbReference type="EMBL" id="MW973948">
    <property type="protein sequence ID" value="QTZ48144.1"/>
    <property type="molecule type" value="Genomic_RNA"/>
</dbReference>
<dbReference type="EMBL" id="MW973949">
    <property type="protein sequence ID" value="QTZ48156.1"/>
    <property type="molecule type" value="Genomic_RNA"/>
</dbReference>
<dbReference type="EMBL" id="MW973950">
    <property type="protein sequence ID" value="QTZ48168.1"/>
    <property type="molecule type" value="Genomic_RNA"/>
</dbReference>
<dbReference type="EMBL" id="MW973951">
    <property type="protein sequence ID" value="QTZ48180.1"/>
    <property type="molecule type" value="Genomic_RNA"/>
</dbReference>
<dbReference type="EMBL" id="MW973952">
    <property type="protein sequence ID" value="QTZ48192.1"/>
    <property type="molecule type" value="Genomic_RNA"/>
</dbReference>
<dbReference type="EMBL" id="MW973953">
    <property type="protein sequence ID" value="QTZ48204.1"/>
    <property type="molecule type" value="Genomic_RNA"/>
</dbReference>
<dbReference type="EMBL" id="MW973954">
    <property type="protein sequence ID" value="QTZ48216.1"/>
    <property type="molecule type" value="Genomic_RNA"/>
</dbReference>
<dbReference type="EMBL" id="MW973955">
    <property type="protein sequence ID" value="QTZ48228.1"/>
    <property type="molecule type" value="Genomic_RNA"/>
</dbReference>
<dbReference type="EMBL" id="MW973956">
    <property type="protein sequence ID" value="QTZ48240.1"/>
    <property type="molecule type" value="Genomic_RNA"/>
</dbReference>
<dbReference type="EMBL" id="MW973957">
    <property type="protein sequence ID" value="QTZ48252.1"/>
    <property type="molecule type" value="Genomic_RNA"/>
</dbReference>
<dbReference type="EMBL" id="MW973958">
    <property type="protein sequence ID" value="QTZ48264.1"/>
    <property type="molecule type" value="Genomic_RNA"/>
</dbReference>
<dbReference type="EMBL" id="MW973959">
    <property type="protein sequence ID" value="QTZ48276.1"/>
    <property type="molecule type" value="Genomic_RNA"/>
</dbReference>
<dbReference type="EMBL" id="MW973960">
    <property type="protein sequence ID" value="QTZ48288.1"/>
    <property type="molecule type" value="Genomic_RNA"/>
</dbReference>
<dbReference type="EMBL" id="MW973961">
    <property type="protein sequence ID" value="QTZ48300.1"/>
    <property type="molecule type" value="Genomic_RNA"/>
</dbReference>
<dbReference type="EMBL" id="MW973962">
    <property type="protein sequence ID" value="QTZ48312.1"/>
    <property type="molecule type" value="Genomic_RNA"/>
</dbReference>
<dbReference type="EMBL" id="MW973963">
    <property type="protein sequence ID" value="QTZ48324.1"/>
    <property type="molecule type" value="Genomic_RNA"/>
</dbReference>
<dbReference type="EMBL" id="MW973964">
    <property type="protein sequence ID" value="QTZ48336.1"/>
    <property type="molecule type" value="Genomic_RNA"/>
</dbReference>
<dbReference type="EMBL" id="MW973965">
    <property type="protein sequence ID" value="QTZ48348.1"/>
    <property type="molecule type" value="Genomic_RNA"/>
</dbReference>
<dbReference type="EMBL" id="MW973966">
    <property type="protein sequence ID" value="QTZ48360.1"/>
    <property type="molecule type" value="Genomic_RNA"/>
</dbReference>
<dbReference type="EMBL" id="MW973967">
    <property type="protein sequence ID" value="QTZ48372.1"/>
    <property type="molecule type" value="Genomic_RNA"/>
</dbReference>
<dbReference type="EMBL" id="MW973968">
    <property type="protein sequence ID" value="QTZ48384.1"/>
    <property type="molecule type" value="Genomic_RNA"/>
</dbReference>
<dbReference type="EMBL" id="MW973969">
    <property type="protein sequence ID" value="QTZ48396.1"/>
    <property type="molecule type" value="Genomic_RNA"/>
</dbReference>
<dbReference type="EMBL" id="MW973970">
    <property type="protein sequence ID" value="QTZ48408.1"/>
    <property type="molecule type" value="Genomic_RNA"/>
</dbReference>
<dbReference type="EMBL" id="MW973971">
    <property type="protein sequence ID" value="QTZ48420.1"/>
    <property type="molecule type" value="Genomic_RNA"/>
</dbReference>
<dbReference type="EMBL" id="MW973972">
    <property type="protein sequence ID" value="QTZ48432.1"/>
    <property type="molecule type" value="Genomic_RNA"/>
</dbReference>
<dbReference type="EMBL" id="MW973973">
    <property type="protein sequence ID" value="QTZ48444.1"/>
    <property type="molecule type" value="Genomic_RNA"/>
</dbReference>
<dbReference type="EMBL" id="MW973974">
    <property type="protein sequence ID" value="QTZ48456.1"/>
    <property type="molecule type" value="Genomic_RNA"/>
</dbReference>
<dbReference type="EMBL" id="MW973975">
    <property type="protein sequence ID" value="QTZ48468.1"/>
    <property type="molecule type" value="Genomic_RNA"/>
</dbReference>
<dbReference type="EMBL" id="MW973976">
    <property type="protein sequence ID" value="QTZ48480.1"/>
    <property type="molecule type" value="Genomic_RNA"/>
</dbReference>
<dbReference type="EMBL" id="MW973977">
    <property type="protein sequence ID" value="QTZ48492.1"/>
    <property type="molecule type" value="Genomic_RNA"/>
</dbReference>
<dbReference type="EMBL" id="MW973978">
    <property type="protein sequence ID" value="QTZ48504.1"/>
    <property type="molecule type" value="Genomic_RNA"/>
</dbReference>
<dbReference type="EMBL" id="MW973979">
    <property type="protein sequence ID" value="QTZ48516.1"/>
    <property type="molecule type" value="Genomic_RNA"/>
</dbReference>
<dbReference type="EMBL" id="MW973980">
    <property type="protein sequence ID" value="QTZ48528.1"/>
    <property type="molecule type" value="Genomic_RNA"/>
</dbReference>
<dbReference type="EMBL" id="MW973981">
    <property type="protein sequence ID" value="QTZ48540.1"/>
    <property type="molecule type" value="Genomic_RNA"/>
</dbReference>
<dbReference type="EMBL" id="MW973982">
    <property type="protein sequence ID" value="QTZ48552.1"/>
    <property type="molecule type" value="Genomic_RNA"/>
</dbReference>
<dbReference type="EMBL" id="MW973983">
    <property type="protein sequence ID" value="QTZ48564.1"/>
    <property type="molecule type" value="Genomic_RNA"/>
</dbReference>
<dbReference type="EMBL" id="MW973984">
    <property type="protein sequence ID" value="QTZ48576.1"/>
    <property type="molecule type" value="Genomic_RNA"/>
</dbReference>
<dbReference type="EMBL" id="MW973985">
    <property type="protein sequence ID" value="QTZ48588.1"/>
    <property type="molecule type" value="Genomic_RNA"/>
</dbReference>
<dbReference type="EMBL" id="MW973986">
    <property type="protein sequence ID" value="QTZ48600.1"/>
    <property type="molecule type" value="Genomic_RNA"/>
</dbReference>
<dbReference type="EMBL" id="MW973987">
    <property type="protein sequence ID" value="QTZ48612.1"/>
    <property type="molecule type" value="Genomic_RNA"/>
</dbReference>
<dbReference type="EMBL" id="MW973988">
    <property type="protein sequence ID" value="QTZ48624.1"/>
    <property type="molecule type" value="Genomic_RNA"/>
</dbReference>
<dbReference type="EMBL" id="MW973989">
    <property type="protein sequence ID" value="QTZ48636.1"/>
    <property type="molecule type" value="Genomic_RNA"/>
</dbReference>
<dbReference type="EMBL" id="MW973990">
    <property type="protein sequence ID" value="QTZ48648.1"/>
    <property type="molecule type" value="Genomic_RNA"/>
</dbReference>
<dbReference type="EMBL" id="MW973991">
    <property type="protein sequence ID" value="QTZ48660.1"/>
    <property type="molecule type" value="Genomic_RNA"/>
</dbReference>
<dbReference type="EMBL" id="MW973993">
    <property type="protein sequence ID" value="QTZ48684.1"/>
    <property type="molecule type" value="Genomic_RNA"/>
</dbReference>
<dbReference type="EMBL" id="MW973994">
    <property type="protein sequence ID" value="QTZ48696.1"/>
    <property type="molecule type" value="Genomic_RNA"/>
</dbReference>
<dbReference type="EMBL" id="MW973995">
    <property type="protein sequence ID" value="QTZ48708.1"/>
    <property type="molecule type" value="Genomic_RNA"/>
</dbReference>
<dbReference type="EMBL" id="MW973996">
    <property type="protein sequence ID" value="QTZ48720.1"/>
    <property type="molecule type" value="Genomic_RNA"/>
</dbReference>
<dbReference type="EMBL" id="MW973997">
    <property type="protein sequence ID" value="QTZ48732.1"/>
    <property type="molecule type" value="Genomic_RNA"/>
</dbReference>
<dbReference type="EMBL" id="MW973998">
    <property type="protein sequence ID" value="QTZ48744.1"/>
    <property type="molecule type" value="Genomic_RNA"/>
</dbReference>
<dbReference type="EMBL" id="MW973999">
    <property type="protein sequence ID" value="QTZ48756.1"/>
    <property type="molecule type" value="Genomic_RNA"/>
</dbReference>
<dbReference type="EMBL" id="MW974000">
    <property type="protein sequence ID" value="QTZ48768.1"/>
    <property type="molecule type" value="Genomic_RNA"/>
</dbReference>
<dbReference type="EMBL" id="MW974001">
    <property type="protein sequence ID" value="QTZ48780.1"/>
    <property type="molecule type" value="Genomic_RNA"/>
</dbReference>
<dbReference type="EMBL" id="MW974002">
    <property type="protein sequence ID" value="QTZ48792.1"/>
    <property type="molecule type" value="Genomic_RNA"/>
</dbReference>
<dbReference type="EMBL" id="MW974003">
    <property type="protein sequence ID" value="QTZ48804.1"/>
    <property type="molecule type" value="Genomic_RNA"/>
</dbReference>
<dbReference type="EMBL" id="MW974004">
    <property type="protein sequence ID" value="QTZ48816.1"/>
    <property type="molecule type" value="Genomic_RNA"/>
</dbReference>
<dbReference type="EMBL" id="MW974005">
    <property type="protein sequence ID" value="QTZ48828.1"/>
    <property type="molecule type" value="Genomic_RNA"/>
</dbReference>
<dbReference type="EMBL" id="MW974006">
    <property type="protein sequence ID" value="QTZ48840.1"/>
    <property type="molecule type" value="Genomic_RNA"/>
</dbReference>
<dbReference type="EMBL" id="MW974007">
    <property type="protein sequence ID" value="QTZ48852.1"/>
    <property type="molecule type" value="Genomic_RNA"/>
</dbReference>
<dbReference type="EMBL" id="MW974008">
    <property type="protein sequence ID" value="QTZ48864.1"/>
    <property type="molecule type" value="Genomic_RNA"/>
</dbReference>
<dbReference type="EMBL" id="MW974009">
    <property type="protein sequence ID" value="QTZ48876.1"/>
    <property type="molecule type" value="Genomic_RNA"/>
</dbReference>
<dbReference type="EMBL" id="MW974010">
    <property type="protein sequence ID" value="QTZ48888.1"/>
    <property type="molecule type" value="Genomic_RNA"/>
</dbReference>
<dbReference type="EMBL" id="MW974011">
    <property type="protein sequence ID" value="QTZ48900.1"/>
    <property type="molecule type" value="Genomic_RNA"/>
</dbReference>
<dbReference type="EMBL" id="MW974012">
    <property type="protein sequence ID" value="QTZ48912.1"/>
    <property type="molecule type" value="Genomic_RNA"/>
</dbReference>
<dbReference type="EMBL" id="MW974013">
    <property type="protein sequence ID" value="QTZ48924.1"/>
    <property type="molecule type" value="Genomic_RNA"/>
</dbReference>
<dbReference type="EMBL" id="MW974014">
    <property type="protein sequence ID" value="QTZ48936.1"/>
    <property type="molecule type" value="Genomic_RNA"/>
</dbReference>
<dbReference type="EMBL" id="MW974015">
    <property type="protein sequence ID" value="QTZ48948.1"/>
    <property type="molecule type" value="Genomic_RNA"/>
</dbReference>
<dbReference type="EMBL" id="MW974016">
    <property type="protein sequence ID" value="QTZ48960.1"/>
    <property type="molecule type" value="Genomic_RNA"/>
</dbReference>
<dbReference type="EMBL" id="MW974017">
    <property type="protein sequence ID" value="QTZ48972.1"/>
    <property type="molecule type" value="Genomic_RNA"/>
</dbReference>
<dbReference type="EMBL" id="MW974018">
    <property type="protein sequence ID" value="QTZ48984.1"/>
    <property type="molecule type" value="Genomic_RNA"/>
</dbReference>
<dbReference type="EMBL" id="MW974019">
    <property type="protein sequence ID" value="QTZ48996.1"/>
    <property type="molecule type" value="Genomic_RNA"/>
</dbReference>
<dbReference type="EMBL" id="MW974020">
    <property type="protein sequence ID" value="QTZ49008.1"/>
    <property type="molecule type" value="Genomic_RNA"/>
</dbReference>
<dbReference type="EMBL" id="MW974021">
    <property type="protein sequence ID" value="QTZ49020.1"/>
    <property type="molecule type" value="Genomic_RNA"/>
</dbReference>
<dbReference type="EMBL" id="MW974022">
    <property type="protein sequence ID" value="QTZ49032.1"/>
    <property type="molecule type" value="Genomic_RNA"/>
</dbReference>
<dbReference type="EMBL" id="MW974023">
    <property type="protein sequence ID" value="QTZ49044.1"/>
    <property type="molecule type" value="Genomic_RNA"/>
</dbReference>
<dbReference type="EMBL" id="MW974024">
    <property type="protein sequence ID" value="QTZ49056.1"/>
    <property type="molecule type" value="Genomic_RNA"/>
</dbReference>
<dbReference type="EMBL" id="MW974025">
    <property type="protein sequence ID" value="QTZ49068.1"/>
    <property type="molecule type" value="Genomic_RNA"/>
</dbReference>
<dbReference type="EMBL" id="MW974026">
    <property type="protein sequence ID" value="QTZ49080.1"/>
    <property type="molecule type" value="Genomic_RNA"/>
</dbReference>
<dbReference type="EMBL" id="MW974027">
    <property type="protein sequence ID" value="QTZ49092.1"/>
    <property type="molecule type" value="Genomic_RNA"/>
</dbReference>
<dbReference type="EMBL" id="MW974029">
    <property type="protein sequence ID" value="QTZ49115.1"/>
    <property type="molecule type" value="Genomic_RNA"/>
</dbReference>
<dbReference type="EMBL" id="MW974030">
    <property type="protein sequence ID" value="QTZ49127.1"/>
    <property type="molecule type" value="Genomic_RNA"/>
</dbReference>
<dbReference type="EMBL" id="MW974031">
    <property type="protein sequence ID" value="QTZ49139.1"/>
    <property type="molecule type" value="Genomic_RNA"/>
</dbReference>
<dbReference type="EMBL" id="MW974032">
    <property type="protein sequence ID" value="QTZ49151.1"/>
    <property type="molecule type" value="Genomic_RNA"/>
</dbReference>
<dbReference type="EMBL" id="MW974033">
    <property type="protein sequence ID" value="QTZ49163.1"/>
    <property type="molecule type" value="Genomic_RNA"/>
</dbReference>
<dbReference type="EMBL" id="MW974034">
    <property type="protein sequence ID" value="QTZ49175.1"/>
    <property type="molecule type" value="Genomic_RNA"/>
</dbReference>
<dbReference type="EMBL" id="MW974035">
    <property type="protein sequence ID" value="QTZ49187.1"/>
    <property type="molecule type" value="Genomic_RNA"/>
</dbReference>
<dbReference type="EMBL" id="MW974036">
    <property type="protein sequence ID" value="QTZ49199.1"/>
    <property type="molecule type" value="Genomic_RNA"/>
</dbReference>
<dbReference type="EMBL" id="MW974037">
    <property type="protein sequence ID" value="QTZ49211.1"/>
    <property type="molecule type" value="Genomic_RNA"/>
</dbReference>
<dbReference type="EMBL" id="MW974038">
    <property type="protein sequence ID" value="QTZ49223.1"/>
    <property type="molecule type" value="Genomic_RNA"/>
</dbReference>
<dbReference type="EMBL" id="MW974039">
    <property type="protein sequence ID" value="QTZ49235.1"/>
    <property type="molecule type" value="Genomic_RNA"/>
</dbReference>
<dbReference type="EMBL" id="MW974040">
    <property type="protein sequence ID" value="QTZ49247.1"/>
    <property type="molecule type" value="Genomic_RNA"/>
</dbReference>
<dbReference type="EMBL" id="MW974041">
    <property type="protein sequence ID" value="QTZ49259.1"/>
    <property type="molecule type" value="Genomic_RNA"/>
</dbReference>
<dbReference type="EMBL" id="MW974042">
    <property type="protein sequence ID" value="QTZ49271.1"/>
    <property type="molecule type" value="Genomic_RNA"/>
</dbReference>
<dbReference type="EMBL" id="MW974043">
    <property type="protein sequence ID" value="QTZ49283.1"/>
    <property type="molecule type" value="Genomic_RNA"/>
</dbReference>
<dbReference type="EMBL" id="MW974044">
    <property type="protein sequence ID" value="QTZ49295.1"/>
    <property type="molecule type" value="Genomic_RNA"/>
</dbReference>
<dbReference type="EMBL" id="MW974045">
    <property type="protein sequence ID" value="QTZ49307.1"/>
    <property type="molecule type" value="Genomic_RNA"/>
</dbReference>
<dbReference type="EMBL" id="MW974046">
    <property type="protein sequence ID" value="QTZ49319.1"/>
    <property type="molecule type" value="Genomic_RNA"/>
</dbReference>
<dbReference type="EMBL" id="MW974047">
    <property type="protein sequence ID" value="QTZ49331.1"/>
    <property type="molecule type" value="Genomic_RNA"/>
</dbReference>
<dbReference type="EMBL" id="MW974049">
    <property type="protein sequence ID" value="QTZ49355.1"/>
    <property type="molecule type" value="Genomic_RNA"/>
</dbReference>
<dbReference type="EMBL" id="MW974050">
    <property type="protein sequence ID" value="QTZ49367.1"/>
    <property type="molecule type" value="Genomic_RNA"/>
</dbReference>
<dbReference type="EMBL" id="MW974051">
    <property type="protein sequence ID" value="QTZ49379.1"/>
    <property type="molecule type" value="Genomic_RNA"/>
</dbReference>
<dbReference type="EMBL" id="MW974052">
    <property type="protein sequence ID" value="QTZ49391.1"/>
    <property type="molecule type" value="Genomic_RNA"/>
</dbReference>
<dbReference type="EMBL" id="MW974053">
    <property type="protein sequence ID" value="QTZ49403.1"/>
    <property type="molecule type" value="Genomic_RNA"/>
</dbReference>
<dbReference type="EMBL" id="MW974054">
    <property type="protein sequence ID" value="QTZ49415.1"/>
    <property type="molecule type" value="Genomic_RNA"/>
</dbReference>
<dbReference type="EMBL" id="MW974055">
    <property type="protein sequence ID" value="QTZ49427.1"/>
    <property type="molecule type" value="Genomic_RNA"/>
</dbReference>
<dbReference type="EMBL" id="MW974056">
    <property type="protein sequence ID" value="QTZ49439.1"/>
    <property type="molecule type" value="Genomic_RNA"/>
</dbReference>
<dbReference type="EMBL" id="MW974057">
    <property type="protein sequence ID" value="QTZ49451.1"/>
    <property type="molecule type" value="Genomic_RNA"/>
</dbReference>
<dbReference type="EMBL" id="MW974058">
    <property type="protein sequence ID" value="QTZ49463.1"/>
    <property type="molecule type" value="Genomic_RNA"/>
</dbReference>
<dbReference type="EMBL" id="MW974059">
    <property type="protein sequence ID" value="QTZ49475.1"/>
    <property type="molecule type" value="Genomic_RNA"/>
</dbReference>
<dbReference type="EMBL" id="MW974060">
    <property type="protein sequence ID" value="QTZ49487.1"/>
    <property type="molecule type" value="Genomic_RNA"/>
</dbReference>
<dbReference type="EMBL" id="MW974061">
    <property type="protein sequence ID" value="QTZ49499.1"/>
    <property type="molecule type" value="Genomic_RNA"/>
</dbReference>
<dbReference type="EMBL" id="MW974062">
    <property type="protein sequence ID" value="QTZ49511.1"/>
    <property type="molecule type" value="Genomic_RNA"/>
</dbReference>
<dbReference type="EMBL" id="MW974063">
    <property type="protein sequence ID" value="QTZ49523.1"/>
    <property type="molecule type" value="Genomic_RNA"/>
</dbReference>
<dbReference type="EMBL" id="MW974064">
    <property type="protein sequence ID" value="QTZ49535.1"/>
    <property type="molecule type" value="Genomic_RNA"/>
</dbReference>
<dbReference type="EMBL" id="MW974065">
    <property type="protein sequence ID" value="QTZ49547.1"/>
    <property type="molecule type" value="Genomic_RNA"/>
</dbReference>
<dbReference type="EMBL" id="MW974066">
    <property type="protein sequence ID" value="QTZ49559.1"/>
    <property type="molecule type" value="Genomic_RNA"/>
</dbReference>
<dbReference type="EMBL" id="MW974067">
    <property type="protein sequence ID" value="QTZ49571.1"/>
    <property type="molecule type" value="Genomic_RNA"/>
</dbReference>
<dbReference type="EMBL" id="MW974068">
    <property type="protein sequence ID" value="QTZ49583.1"/>
    <property type="molecule type" value="Genomic_RNA"/>
</dbReference>
<dbReference type="EMBL" id="MW974069">
    <property type="protein sequence ID" value="QTZ49595.1"/>
    <property type="molecule type" value="Genomic_RNA"/>
</dbReference>
<dbReference type="EMBL" id="MW974070">
    <property type="protein sequence ID" value="QTZ49607.1"/>
    <property type="molecule type" value="Genomic_RNA"/>
</dbReference>
<dbReference type="EMBL" id="MW974071">
    <property type="protein sequence ID" value="QTZ49619.1"/>
    <property type="molecule type" value="Genomic_RNA"/>
</dbReference>
<dbReference type="EMBL" id="MW974072">
    <property type="protein sequence ID" value="QTZ49631.1"/>
    <property type="molecule type" value="Genomic_RNA"/>
</dbReference>
<dbReference type="EMBL" id="MW974073">
    <property type="protein sequence ID" value="QTZ49643.1"/>
    <property type="molecule type" value="Genomic_RNA"/>
</dbReference>
<dbReference type="EMBL" id="MW974074">
    <property type="protein sequence ID" value="QTZ49655.1"/>
    <property type="molecule type" value="Genomic_RNA"/>
</dbReference>
<dbReference type="EMBL" id="MW974075">
    <property type="protein sequence ID" value="QTZ49667.1"/>
    <property type="molecule type" value="Genomic_RNA"/>
</dbReference>
<dbReference type="EMBL" id="MW974076">
    <property type="protein sequence ID" value="QTZ49679.1"/>
    <property type="molecule type" value="Genomic_RNA"/>
</dbReference>
<dbReference type="EMBL" id="MW974077">
    <property type="protein sequence ID" value="QTZ49691.1"/>
    <property type="molecule type" value="Genomic_RNA"/>
</dbReference>
<dbReference type="EMBL" id="MW974078">
    <property type="protein sequence ID" value="QTZ49703.1"/>
    <property type="molecule type" value="Genomic_RNA"/>
</dbReference>
<dbReference type="EMBL" id="MW974079">
    <property type="protein sequence ID" value="QTZ49715.1"/>
    <property type="molecule type" value="Genomic_RNA"/>
</dbReference>
<dbReference type="EMBL" id="MW974080">
    <property type="protein sequence ID" value="QTZ49727.1"/>
    <property type="molecule type" value="Genomic_RNA"/>
</dbReference>
<dbReference type="EMBL" id="MW974081">
    <property type="protein sequence ID" value="QTZ49739.1"/>
    <property type="molecule type" value="Genomic_RNA"/>
</dbReference>
<dbReference type="EMBL" id="MW974082">
    <property type="protein sequence ID" value="QTZ49751.1"/>
    <property type="molecule type" value="Genomic_RNA"/>
</dbReference>
<dbReference type="EMBL" id="MW974083">
    <property type="protein sequence ID" value="QTZ49763.1"/>
    <property type="molecule type" value="Genomic_RNA"/>
</dbReference>
<dbReference type="EMBL" id="MW974084">
    <property type="protein sequence ID" value="QTZ49775.1"/>
    <property type="molecule type" value="Genomic_RNA"/>
</dbReference>
<dbReference type="EMBL" id="MW974085">
    <property type="protein sequence ID" value="QTZ49787.1"/>
    <property type="molecule type" value="Genomic_RNA"/>
</dbReference>
<dbReference type="EMBL" id="MW974086">
    <property type="protein sequence ID" value="QTZ49799.1"/>
    <property type="molecule type" value="Genomic_RNA"/>
</dbReference>
<dbReference type="EMBL" id="MW974087">
    <property type="protein sequence ID" value="QTZ49811.1"/>
    <property type="molecule type" value="Genomic_RNA"/>
</dbReference>
<dbReference type="EMBL" id="MW974088">
    <property type="protein sequence ID" value="QTZ49823.1"/>
    <property type="molecule type" value="Genomic_RNA"/>
</dbReference>
<dbReference type="EMBL" id="MW974089">
    <property type="protein sequence ID" value="QTZ49835.1"/>
    <property type="molecule type" value="Genomic_RNA"/>
</dbReference>
<dbReference type="EMBL" id="MW974090">
    <property type="protein sequence ID" value="QTZ49847.1"/>
    <property type="molecule type" value="Genomic_RNA"/>
</dbReference>
<dbReference type="EMBL" id="MW974091">
    <property type="protein sequence ID" value="QTZ49859.1"/>
    <property type="molecule type" value="Genomic_RNA"/>
</dbReference>
<dbReference type="EMBL" id="MW974092">
    <property type="protein sequence ID" value="QTZ49871.1"/>
    <property type="molecule type" value="Genomic_RNA"/>
</dbReference>
<dbReference type="EMBL" id="MW974093">
    <property type="protein sequence ID" value="QTZ49883.1"/>
    <property type="molecule type" value="Genomic_RNA"/>
</dbReference>
<dbReference type="EMBL" id="MW974094">
    <property type="protein sequence ID" value="QTZ49895.1"/>
    <property type="molecule type" value="Genomic_RNA"/>
</dbReference>
<dbReference type="EMBL" id="MW974095">
    <property type="protein sequence ID" value="QTZ49907.1"/>
    <property type="molecule type" value="Genomic_RNA"/>
</dbReference>
<dbReference type="EMBL" id="MW974096">
    <property type="protein sequence ID" value="QTZ49919.1"/>
    <property type="molecule type" value="Genomic_RNA"/>
</dbReference>
<dbReference type="EMBL" id="MW974097">
    <property type="protein sequence ID" value="QTZ49931.1"/>
    <property type="molecule type" value="Genomic_RNA"/>
</dbReference>
<dbReference type="EMBL" id="MW974098">
    <property type="protein sequence ID" value="QTZ49943.1"/>
    <property type="molecule type" value="Genomic_RNA"/>
</dbReference>
<dbReference type="EMBL" id="MW974099">
    <property type="protein sequence ID" value="QTZ49955.1"/>
    <property type="molecule type" value="Genomic_RNA"/>
</dbReference>
<dbReference type="EMBL" id="MW974100">
    <property type="protein sequence ID" value="QTZ49967.1"/>
    <property type="molecule type" value="Genomic_RNA"/>
</dbReference>
<dbReference type="EMBL" id="MW974101">
    <property type="protein sequence ID" value="QTZ49979.1"/>
    <property type="molecule type" value="Genomic_RNA"/>
</dbReference>
<dbReference type="EMBL" id="MW974102">
    <property type="protein sequence ID" value="QTZ49991.1"/>
    <property type="molecule type" value="Genomic_RNA"/>
</dbReference>
<dbReference type="EMBL" id="MW974103">
    <property type="protein sequence ID" value="QTZ50003.1"/>
    <property type="molecule type" value="Genomic_RNA"/>
</dbReference>
<dbReference type="EMBL" id="MW974104">
    <property type="protein sequence ID" value="QTZ50015.1"/>
    <property type="molecule type" value="Genomic_RNA"/>
</dbReference>
<dbReference type="EMBL" id="MW974105">
    <property type="protein sequence ID" value="QTZ50027.1"/>
    <property type="molecule type" value="Genomic_RNA"/>
</dbReference>
<dbReference type="EMBL" id="MW974106">
    <property type="protein sequence ID" value="QTZ50039.1"/>
    <property type="molecule type" value="Genomic_RNA"/>
</dbReference>
<dbReference type="EMBL" id="MW974107">
    <property type="protein sequence ID" value="QTZ50051.1"/>
    <property type="molecule type" value="Genomic_RNA"/>
</dbReference>
<dbReference type="EMBL" id="MW974108">
    <property type="protein sequence ID" value="QTZ50063.1"/>
    <property type="molecule type" value="Genomic_RNA"/>
</dbReference>
<dbReference type="EMBL" id="MW974109">
    <property type="protein sequence ID" value="QTZ50075.1"/>
    <property type="molecule type" value="Genomic_RNA"/>
</dbReference>
<dbReference type="EMBL" id="MW974110">
    <property type="protein sequence ID" value="QTZ50087.1"/>
    <property type="molecule type" value="Genomic_RNA"/>
</dbReference>
<dbReference type="EMBL" id="MW974111">
    <property type="protein sequence ID" value="QTZ50099.1"/>
    <property type="molecule type" value="Genomic_RNA"/>
</dbReference>
<dbReference type="EMBL" id="MW974112">
    <property type="protein sequence ID" value="QTZ50111.1"/>
    <property type="molecule type" value="Genomic_RNA"/>
</dbReference>
<dbReference type="EMBL" id="MW974113">
    <property type="protein sequence ID" value="QTZ50123.1"/>
    <property type="molecule type" value="Genomic_RNA"/>
</dbReference>
<dbReference type="EMBL" id="MW974114">
    <property type="protein sequence ID" value="QTZ50135.1"/>
    <property type="molecule type" value="Genomic_RNA"/>
</dbReference>
<dbReference type="EMBL" id="MW974115">
    <property type="protein sequence ID" value="QTZ50147.1"/>
    <property type="molecule type" value="Genomic_RNA"/>
</dbReference>
<dbReference type="EMBL" id="MW974116">
    <property type="protein sequence ID" value="QTZ50159.1"/>
    <property type="molecule type" value="Genomic_RNA"/>
</dbReference>
<dbReference type="EMBL" id="MW974117">
    <property type="protein sequence ID" value="QTZ50171.1"/>
    <property type="molecule type" value="Genomic_RNA"/>
</dbReference>
<dbReference type="EMBL" id="MW974118">
    <property type="protein sequence ID" value="QTZ50183.1"/>
    <property type="molecule type" value="Genomic_RNA"/>
</dbReference>
<dbReference type="EMBL" id="MW974119">
    <property type="protein sequence ID" value="QTZ50195.1"/>
    <property type="molecule type" value="Genomic_RNA"/>
</dbReference>
<dbReference type="EMBL" id="MW974120">
    <property type="protein sequence ID" value="QTZ50207.1"/>
    <property type="molecule type" value="Genomic_RNA"/>
</dbReference>
<dbReference type="EMBL" id="MW974121">
    <property type="protein sequence ID" value="QTZ50219.1"/>
    <property type="molecule type" value="Genomic_RNA"/>
</dbReference>
<dbReference type="EMBL" id="MW974122">
    <property type="protein sequence ID" value="QTZ50231.1"/>
    <property type="molecule type" value="Genomic_RNA"/>
</dbReference>
<dbReference type="EMBL" id="MW974123">
    <property type="protein sequence ID" value="QTZ50243.1"/>
    <property type="molecule type" value="Genomic_RNA"/>
</dbReference>
<dbReference type="EMBL" id="MW974124">
    <property type="protein sequence ID" value="QTZ50255.1"/>
    <property type="molecule type" value="Genomic_RNA"/>
</dbReference>
<dbReference type="EMBL" id="MW974125">
    <property type="protein sequence ID" value="QTZ50267.1"/>
    <property type="molecule type" value="Genomic_RNA"/>
</dbReference>
<dbReference type="EMBL" id="MW974126">
    <property type="protein sequence ID" value="QTZ50279.1"/>
    <property type="molecule type" value="Genomic_RNA"/>
</dbReference>
<dbReference type="EMBL" id="MW974127">
    <property type="protein sequence ID" value="QTZ50291.1"/>
    <property type="molecule type" value="Genomic_RNA"/>
</dbReference>
<dbReference type="EMBL" id="MW974128">
    <property type="protein sequence ID" value="QTZ50303.1"/>
    <property type="molecule type" value="Genomic_RNA"/>
</dbReference>
<dbReference type="EMBL" id="MW974129">
    <property type="protein sequence ID" value="QTZ50315.1"/>
    <property type="molecule type" value="Genomic_RNA"/>
</dbReference>
<dbReference type="EMBL" id="MW974130">
    <property type="protein sequence ID" value="QTZ50327.1"/>
    <property type="molecule type" value="Genomic_RNA"/>
</dbReference>
<dbReference type="EMBL" id="MW974131">
    <property type="protein sequence ID" value="QTZ50339.1"/>
    <property type="molecule type" value="Genomic_RNA"/>
</dbReference>
<dbReference type="EMBL" id="MW974132">
    <property type="protein sequence ID" value="QTZ50351.1"/>
    <property type="molecule type" value="Genomic_RNA"/>
</dbReference>
<dbReference type="EMBL" id="MW974133">
    <property type="protein sequence ID" value="QTZ50363.1"/>
    <property type="molecule type" value="Genomic_RNA"/>
</dbReference>
<dbReference type="EMBL" id="MW974134">
    <property type="protein sequence ID" value="QTZ50375.1"/>
    <property type="molecule type" value="Genomic_RNA"/>
</dbReference>
<dbReference type="EMBL" id="MW974135">
    <property type="protein sequence ID" value="QTZ50387.1"/>
    <property type="molecule type" value="Genomic_RNA"/>
</dbReference>
<dbReference type="EMBL" id="MW974136">
    <property type="protein sequence ID" value="QTZ50399.1"/>
    <property type="molecule type" value="Genomic_RNA"/>
</dbReference>
<dbReference type="EMBL" id="MW974137">
    <property type="protein sequence ID" value="QTZ50411.1"/>
    <property type="molecule type" value="Genomic_RNA"/>
</dbReference>
<dbReference type="EMBL" id="MW974138">
    <property type="protein sequence ID" value="QTZ50423.1"/>
    <property type="molecule type" value="Genomic_RNA"/>
</dbReference>
<dbReference type="EMBL" id="MW974139">
    <property type="protein sequence ID" value="QTZ50435.1"/>
    <property type="molecule type" value="Genomic_RNA"/>
</dbReference>
<dbReference type="EMBL" id="MW974140">
    <property type="protein sequence ID" value="QTZ50447.1"/>
    <property type="molecule type" value="Genomic_RNA"/>
</dbReference>
<dbReference type="EMBL" id="MW974141">
    <property type="protein sequence ID" value="QTZ50459.1"/>
    <property type="molecule type" value="Genomic_RNA"/>
</dbReference>
<dbReference type="EMBL" id="MW974142">
    <property type="protein sequence ID" value="QTZ50471.1"/>
    <property type="molecule type" value="Genomic_RNA"/>
</dbReference>
<dbReference type="EMBL" id="MW974143">
    <property type="protein sequence ID" value="QTZ50483.1"/>
    <property type="molecule type" value="Genomic_RNA"/>
</dbReference>
<dbReference type="EMBL" id="MW974144">
    <property type="protein sequence ID" value="QTZ50495.1"/>
    <property type="molecule type" value="Genomic_RNA"/>
</dbReference>
<dbReference type="EMBL" id="MW974145">
    <property type="protein sequence ID" value="QTZ50507.1"/>
    <property type="molecule type" value="Genomic_RNA"/>
</dbReference>
<dbReference type="EMBL" id="MW974146">
    <property type="protein sequence ID" value="QTZ50519.1"/>
    <property type="molecule type" value="Genomic_RNA"/>
</dbReference>
<dbReference type="EMBL" id="MW974147">
    <property type="protein sequence ID" value="QTZ50531.1"/>
    <property type="molecule type" value="Genomic_RNA"/>
</dbReference>
<dbReference type="EMBL" id="MW974148">
    <property type="protein sequence ID" value="QTZ50543.1"/>
    <property type="molecule type" value="Genomic_RNA"/>
</dbReference>
<dbReference type="EMBL" id="MW974149">
    <property type="protein sequence ID" value="QTZ50555.1"/>
    <property type="molecule type" value="Genomic_RNA"/>
</dbReference>
<dbReference type="EMBL" id="MW974150">
    <property type="protein sequence ID" value="QTZ50567.1"/>
    <property type="molecule type" value="Genomic_RNA"/>
</dbReference>
<dbReference type="EMBL" id="MW974151">
    <property type="protein sequence ID" value="QTZ50579.1"/>
    <property type="molecule type" value="Genomic_RNA"/>
</dbReference>
<dbReference type="EMBL" id="MW974152">
    <property type="protein sequence ID" value="QTZ50591.1"/>
    <property type="molecule type" value="Genomic_RNA"/>
</dbReference>
<dbReference type="EMBL" id="MW974153">
    <property type="protein sequence ID" value="QTZ50603.1"/>
    <property type="molecule type" value="Genomic_RNA"/>
</dbReference>
<dbReference type="EMBL" id="MW974154">
    <property type="protein sequence ID" value="QTZ50615.1"/>
    <property type="molecule type" value="Genomic_RNA"/>
</dbReference>
<dbReference type="EMBL" id="MW974155">
    <property type="protein sequence ID" value="QTZ50627.1"/>
    <property type="molecule type" value="Genomic_RNA"/>
</dbReference>
<dbReference type="EMBL" id="MW974156">
    <property type="protein sequence ID" value="QTZ50639.1"/>
    <property type="molecule type" value="Genomic_RNA"/>
</dbReference>
<dbReference type="EMBL" id="MW974157">
    <property type="protein sequence ID" value="QTZ50651.1"/>
    <property type="molecule type" value="Genomic_RNA"/>
</dbReference>
<dbReference type="EMBL" id="MW974158">
    <property type="protein sequence ID" value="QTZ50663.1"/>
    <property type="molecule type" value="Genomic_RNA"/>
</dbReference>
<dbReference type="EMBL" id="MW974159">
    <property type="protein sequence ID" value="QTZ50675.1"/>
    <property type="molecule type" value="Genomic_RNA"/>
</dbReference>
<dbReference type="EMBL" id="MW974160">
    <property type="protein sequence ID" value="QTZ50687.1"/>
    <property type="molecule type" value="Genomic_RNA"/>
</dbReference>
<dbReference type="EMBL" id="MW974161">
    <property type="protein sequence ID" value="QTZ50699.1"/>
    <property type="molecule type" value="Genomic_RNA"/>
</dbReference>
<dbReference type="EMBL" id="MW974162">
    <property type="protein sequence ID" value="QTZ50711.1"/>
    <property type="molecule type" value="Genomic_RNA"/>
</dbReference>
<dbReference type="EMBL" id="MW974163">
    <property type="protein sequence ID" value="QTZ50723.1"/>
    <property type="molecule type" value="Genomic_RNA"/>
</dbReference>
<dbReference type="EMBL" id="MW974164">
    <property type="protein sequence ID" value="QTZ50735.1"/>
    <property type="molecule type" value="Genomic_RNA"/>
</dbReference>
<dbReference type="EMBL" id="MW974165">
    <property type="protein sequence ID" value="QTZ50747.1"/>
    <property type="molecule type" value="Genomic_RNA"/>
</dbReference>
<dbReference type="EMBL" id="MW974166">
    <property type="protein sequence ID" value="QTZ50759.1"/>
    <property type="molecule type" value="Genomic_RNA"/>
</dbReference>
<dbReference type="EMBL" id="MW974167">
    <property type="protein sequence ID" value="QTZ50771.1"/>
    <property type="molecule type" value="Genomic_RNA"/>
</dbReference>
<dbReference type="EMBL" id="MW974168">
    <property type="protein sequence ID" value="QTZ50783.1"/>
    <property type="molecule type" value="Genomic_RNA"/>
</dbReference>
<dbReference type="EMBL" id="MW974169">
    <property type="protein sequence ID" value="QTZ50795.1"/>
    <property type="molecule type" value="Genomic_RNA"/>
</dbReference>
<dbReference type="EMBL" id="MW974170">
    <property type="protein sequence ID" value="QTZ50807.1"/>
    <property type="molecule type" value="Genomic_RNA"/>
</dbReference>
<dbReference type="EMBL" id="MW974171">
    <property type="protein sequence ID" value="QTZ50819.1"/>
    <property type="molecule type" value="Genomic_RNA"/>
</dbReference>
<dbReference type="EMBL" id="MW974172">
    <property type="protein sequence ID" value="QTZ50831.1"/>
    <property type="molecule type" value="Genomic_RNA"/>
</dbReference>
<dbReference type="EMBL" id="MW974173">
    <property type="protein sequence ID" value="QTZ50843.1"/>
    <property type="molecule type" value="Genomic_RNA"/>
</dbReference>
<dbReference type="EMBL" id="MW974174">
    <property type="protein sequence ID" value="QTZ50855.1"/>
    <property type="molecule type" value="Genomic_RNA"/>
</dbReference>
<dbReference type="EMBL" id="MW974175">
    <property type="protein sequence ID" value="QTZ50867.1"/>
    <property type="molecule type" value="Genomic_RNA"/>
</dbReference>
<dbReference type="EMBL" id="MW974176">
    <property type="protein sequence ID" value="QTZ50879.1"/>
    <property type="molecule type" value="Genomic_RNA"/>
</dbReference>
<dbReference type="EMBL" id="MW974177">
    <property type="protein sequence ID" value="QTZ50891.1"/>
    <property type="molecule type" value="Genomic_RNA"/>
</dbReference>
<dbReference type="EMBL" id="MW974178">
    <property type="protein sequence ID" value="QTZ50903.1"/>
    <property type="molecule type" value="Genomic_RNA"/>
</dbReference>
<dbReference type="EMBL" id="MW974179">
    <property type="protein sequence ID" value="QTZ50915.1"/>
    <property type="molecule type" value="Genomic_RNA"/>
</dbReference>
<dbReference type="EMBL" id="MW974180">
    <property type="protein sequence ID" value="QTZ50927.1"/>
    <property type="molecule type" value="Genomic_RNA"/>
</dbReference>
<dbReference type="EMBL" id="MW974181">
    <property type="protein sequence ID" value="QTZ50939.1"/>
    <property type="molecule type" value="Genomic_RNA"/>
</dbReference>
<dbReference type="EMBL" id="MW974182">
    <property type="protein sequence ID" value="QTZ50951.1"/>
    <property type="molecule type" value="Genomic_RNA"/>
</dbReference>
<dbReference type="EMBL" id="MW974183">
    <property type="protein sequence ID" value="QTZ50963.1"/>
    <property type="molecule type" value="Genomic_RNA"/>
</dbReference>
<dbReference type="EMBL" id="MW974184">
    <property type="protein sequence ID" value="QTZ50975.1"/>
    <property type="molecule type" value="Genomic_RNA"/>
</dbReference>
<dbReference type="EMBL" id="MW974185">
    <property type="protein sequence ID" value="QTZ50987.1"/>
    <property type="molecule type" value="Genomic_RNA"/>
</dbReference>
<dbReference type="EMBL" id="MW974186">
    <property type="protein sequence ID" value="QTZ50999.1"/>
    <property type="molecule type" value="Genomic_RNA"/>
</dbReference>
<dbReference type="EMBL" id="MW974187">
    <property type="protein sequence ID" value="QTZ51011.1"/>
    <property type="molecule type" value="Genomic_RNA"/>
</dbReference>
<dbReference type="EMBL" id="MW974188">
    <property type="protein sequence ID" value="QTZ51023.1"/>
    <property type="molecule type" value="Genomic_RNA"/>
</dbReference>
<dbReference type="EMBL" id="MW974189">
    <property type="protein sequence ID" value="QTZ51035.1"/>
    <property type="molecule type" value="Genomic_RNA"/>
</dbReference>
<dbReference type="EMBL" id="MW974190">
    <property type="protein sequence ID" value="QTZ51047.1"/>
    <property type="molecule type" value="Genomic_RNA"/>
</dbReference>
<dbReference type="EMBL" id="MW974191">
    <property type="protein sequence ID" value="QTZ51059.1"/>
    <property type="molecule type" value="Genomic_RNA"/>
</dbReference>
<dbReference type="EMBL" id="MW974192">
    <property type="protein sequence ID" value="QTZ51071.1"/>
    <property type="molecule type" value="Genomic_RNA"/>
</dbReference>
<dbReference type="EMBL" id="MW974193">
    <property type="protein sequence ID" value="QTZ51083.1"/>
    <property type="molecule type" value="Genomic_RNA"/>
</dbReference>
<dbReference type="EMBL" id="MW974194">
    <property type="protein sequence ID" value="QTZ51095.1"/>
    <property type="molecule type" value="Genomic_RNA"/>
</dbReference>
<dbReference type="EMBL" id="MW974195">
    <property type="protein sequence ID" value="QTZ51107.1"/>
    <property type="molecule type" value="Genomic_RNA"/>
</dbReference>
<dbReference type="EMBL" id="MW974196">
    <property type="protein sequence ID" value="QTZ51119.1"/>
    <property type="molecule type" value="Genomic_RNA"/>
</dbReference>
<dbReference type="EMBL" id="MW974197">
    <property type="protein sequence ID" value="QTZ51131.1"/>
    <property type="molecule type" value="Genomic_RNA"/>
</dbReference>
<dbReference type="EMBL" id="MW974198">
    <property type="protein sequence ID" value="QTZ51143.1"/>
    <property type="molecule type" value="Genomic_RNA"/>
</dbReference>
<dbReference type="EMBL" id="MW974199">
    <property type="protein sequence ID" value="QTZ51155.1"/>
    <property type="molecule type" value="Genomic_RNA"/>
</dbReference>
<dbReference type="EMBL" id="MW974200">
    <property type="protein sequence ID" value="QTZ51167.1"/>
    <property type="molecule type" value="Genomic_RNA"/>
</dbReference>
<dbReference type="EMBL" id="MW974201">
    <property type="protein sequence ID" value="QTZ51179.1"/>
    <property type="molecule type" value="Genomic_RNA"/>
</dbReference>
<dbReference type="EMBL" id="MW974202">
    <property type="protein sequence ID" value="QTZ51191.1"/>
    <property type="molecule type" value="Genomic_RNA"/>
</dbReference>
<dbReference type="EMBL" id="MW974203">
    <property type="protein sequence ID" value="QTZ51203.1"/>
    <property type="molecule type" value="Genomic_RNA"/>
</dbReference>
<dbReference type="EMBL" id="MW974204">
    <property type="protein sequence ID" value="QTZ51215.1"/>
    <property type="molecule type" value="Genomic_RNA"/>
</dbReference>
<dbReference type="EMBL" id="MW974205">
    <property type="protein sequence ID" value="QTZ51227.1"/>
    <property type="molecule type" value="Genomic_RNA"/>
</dbReference>
<dbReference type="EMBL" id="MW974206">
    <property type="protein sequence ID" value="QTZ51239.1"/>
    <property type="molecule type" value="Genomic_RNA"/>
</dbReference>
<dbReference type="EMBL" id="MW974207">
    <property type="protein sequence ID" value="QTZ51251.1"/>
    <property type="molecule type" value="Genomic_RNA"/>
</dbReference>
<dbReference type="EMBL" id="MW974208">
    <property type="protein sequence ID" value="QTZ51263.1"/>
    <property type="molecule type" value="Genomic_RNA"/>
</dbReference>
<dbReference type="EMBL" id="MW974209">
    <property type="protein sequence ID" value="QTZ51275.1"/>
    <property type="molecule type" value="Genomic_RNA"/>
</dbReference>
<dbReference type="EMBL" id="MW974210">
    <property type="protein sequence ID" value="QTZ51287.1"/>
    <property type="molecule type" value="Genomic_RNA"/>
</dbReference>
<dbReference type="EMBL" id="MW974211">
    <property type="protein sequence ID" value="QTZ51299.1"/>
    <property type="molecule type" value="Genomic_RNA"/>
</dbReference>
<dbReference type="EMBL" id="MW974212">
    <property type="protein sequence ID" value="QTZ51311.1"/>
    <property type="molecule type" value="Genomic_RNA"/>
</dbReference>
<dbReference type="EMBL" id="MW974213">
    <property type="protein sequence ID" value="QTZ51323.1"/>
    <property type="molecule type" value="Genomic_RNA"/>
</dbReference>
<dbReference type="EMBL" id="MW974214">
    <property type="protein sequence ID" value="QTZ51334.1"/>
    <property type="molecule type" value="Genomic_RNA"/>
</dbReference>
<dbReference type="EMBL" id="MW974215">
    <property type="protein sequence ID" value="QTZ51345.1"/>
    <property type="molecule type" value="Genomic_RNA"/>
</dbReference>
<dbReference type="EMBL" id="MW974216">
    <property type="protein sequence ID" value="QTZ51356.1"/>
    <property type="molecule type" value="Genomic_RNA"/>
</dbReference>
<dbReference type="EMBL" id="MW974217">
    <property type="protein sequence ID" value="QTZ51368.1"/>
    <property type="molecule type" value="Genomic_RNA"/>
</dbReference>
<dbReference type="EMBL" id="MW974218">
    <property type="protein sequence ID" value="QTZ51380.1"/>
    <property type="molecule type" value="Genomic_RNA"/>
</dbReference>
<dbReference type="EMBL" id="MW974219">
    <property type="protein sequence ID" value="QTZ51392.1"/>
    <property type="molecule type" value="Genomic_RNA"/>
</dbReference>
<dbReference type="EMBL" id="MW974220">
    <property type="protein sequence ID" value="QTZ51404.1"/>
    <property type="molecule type" value="Genomic_RNA"/>
</dbReference>
<dbReference type="EMBL" id="MW974222">
    <property type="protein sequence ID" value="QTZ51428.1"/>
    <property type="molecule type" value="Genomic_RNA"/>
</dbReference>
<dbReference type="EMBL" id="MW974223">
    <property type="protein sequence ID" value="QTZ51440.1"/>
    <property type="molecule type" value="Genomic_RNA"/>
</dbReference>
<dbReference type="EMBL" id="MW974224">
    <property type="protein sequence ID" value="QTZ51452.1"/>
    <property type="molecule type" value="Genomic_RNA"/>
</dbReference>
<dbReference type="EMBL" id="MW974225">
    <property type="protein sequence ID" value="QTZ51464.1"/>
    <property type="molecule type" value="Genomic_RNA"/>
</dbReference>
<dbReference type="EMBL" id="MW974226">
    <property type="protein sequence ID" value="QTZ51476.1"/>
    <property type="molecule type" value="Genomic_RNA"/>
</dbReference>
<dbReference type="EMBL" id="MW974227">
    <property type="protein sequence ID" value="QTZ51488.1"/>
    <property type="molecule type" value="Genomic_RNA"/>
</dbReference>
<dbReference type="EMBL" id="MW974228">
    <property type="protein sequence ID" value="QTZ51499.1"/>
    <property type="molecule type" value="Genomic_RNA"/>
</dbReference>
<dbReference type="EMBL" id="MW974229">
    <property type="protein sequence ID" value="QTZ51511.1"/>
    <property type="molecule type" value="Genomic_RNA"/>
</dbReference>
<dbReference type="EMBL" id="MW974230">
    <property type="protein sequence ID" value="QTZ51523.1"/>
    <property type="molecule type" value="Genomic_RNA"/>
</dbReference>
<dbReference type="EMBL" id="MW974231">
    <property type="protein sequence ID" value="QTZ51535.1"/>
    <property type="molecule type" value="Genomic_RNA"/>
</dbReference>
<dbReference type="EMBL" id="MW974232">
    <property type="protein sequence ID" value="QTZ51547.1"/>
    <property type="molecule type" value="Genomic_RNA"/>
</dbReference>
<dbReference type="EMBL" id="MW974233">
    <property type="protein sequence ID" value="QTZ51559.1"/>
    <property type="molecule type" value="Genomic_RNA"/>
</dbReference>
<dbReference type="EMBL" id="MW974234">
    <property type="protein sequence ID" value="QTZ51571.1"/>
    <property type="molecule type" value="Genomic_RNA"/>
</dbReference>
<dbReference type="EMBL" id="MW974235">
    <property type="protein sequence ID" value="QTZ51583.1"/>
    <property type="molecule type" value="Genomic_RNA"/>
</dbReference>
<dbReference type="EMBL" id="MW974236">
    <property type="protein sequence ID" value="QTZ51595.1"/>
    <property type="molecule type" value="Genomic_RNA"/>
</dbReference>
<dbReference type="EMBL" id="MW974237">
    <property type="protein sequence ID" value="QTZ51607.1"/>
    <property type="molecule type" value="Genomic_RNA"/>
</dbReference>
<dbReference type="EMBL" id="MW974238">
    <property type="protein sequence ID" value="QTZ51619.1"/>
    <property type="molecule type" value="Genomic_RNA"/>
</dbReference>
<dbReference type="EMBL" id="MW974239">
    <property type="protein sequence ID" value="QTZ51631.1"/>
    <property type="molecule type" value="Genomic_RNA"/>
</dbReference>
<dbReference type="EMBL" id="MW974240">
    <property type="protein sequence ID" value="QTZ51643.1"/>
    <property type="molecule type" value="Genomic_RNA"/>
</dbReference>
<dbReference type="EMBL" id="MW974241">
    <property type="protein sequence ID" value="QTZ51655.1"/>
    <property type="molecule type" value="Genomic_RNA"/>
</dbReference>
<dbReference type="EMBL" id="MW974242">
    <property type="protein sequence ID" value="QTZ51667.1"/>
    <property type="molecule type" value="Genomic_RNA"/>
</dbReference>
<dbReference type="EMBL" id="MW974243">
    <property type="protein sequence ID" value="QTZ51679.1"/>
    <property type="molecule type" value="Genomic_RNA"/>
</dbReference>
<dbReference type="EMBL" id="MW974244">
    <property type="protein sequence ID" value="QTZ51691.1"/>
    <property type="molecule type" value="Genomic_RNA"/>
</dbReference>
<dbReference type="EMBL" id="MW974245">
    <property type="protein sequence ID" value="QTZ51703.1"/>
    <property type="molecule type" value="Genomic_RNA"/>
</dbReference>
<dbReference type="EMBL" id="MW974246">
    <property type="protein sequence ID" value="QTZ51715.1"/>
    <property type="molecule type" value="Genomic_RNA"/>
</dbReference>
<dbReference type="EMBL" id="MW974247">
    <property type="protein sequence ID" value="QTZ51727.1"/>
    <property type="molecule type" value="Genomic_RNA"/>
</dbReference>
<dbReference type="EMBL" id="MW974248">
    <property type="protein sequence ID" value="QTZ51739.1"/>
    <property type="molecule type" value="Genomic_RNA"/>
</dbReference>
<dbReference type="EMBL" id="MW974249">
    <property type="protein sequence ID" value="QTZ51751.1"/>
    <property type="molecule type" value="Genomic_RNA"/>
</dbReference>
<dbReference type="EMBL" id="MW974250">
    <property type="protein sequence ID" value="QTZ51763.1"/>
    <property type="molecule type" value="Genomic_RNA"/>
</dbReference>
<dbReference type="EMBL" id="MW974251">
    <property type="protein sequence ID" value="QTZ51775.1"/>
    <property type="molecule type" value="Genomic_RNA"/>
</dbReference>
<dbReference type="EMBL" id="MW974252">
    <property type="protein sequence ID" value="QTZ51787.1"/>
    <property type="molecule type" value="Genomic_RNA"/>
</dbReference>
<dbReference type="EMBL" id="MW974253">
    <property type="protein sequence ID" value="QTZ51799.1"/>
    <property type="molecule type" value="Genomic_RNA"/>
</dbReference>
<dbReference type="EMBL" id="MW974254">
    <property type="protein sequence ID" value="QTZ51811.1"/>
    <property type="molecule type" value="Genomic_RNA"/>
</dbReference>
<dbReference type="EMBL" id="MW974255">
    <property type="protein sequence ID" value="QTZ51823.1"/>
    <property type="molecule type" value="Genomic_RNA"/>
</dbReference>
<dbReference type="EMBL" id="MW974256">
    <property type="protein sequence ID" value="QTZ51835.1"/>
    <property type="molecule type" value="Genomic_RNA"/>
</dbReference>
<dbReference type="EMBL" id="MW974257">
    <property type="protein sequence ID" value="QTZ51847.1"/>
    <property type="molecule type" value="Genomic_RNA"/>
</dbReference>
<dbReference type="EMBL" id="MW974258">
    <property type="protein sequence ID" value="QTZ51859.1"/>
    <property type="molecule type" value="Genomic_RNA"/>
</dbReference>
<dbReference type="EMBL" id="MW974259">
    <property type="protein sequence ID" value="QTZ51871.1"/>
    <property type="molecule type" value="Genomic_RNA"/>
</dbReference>
<dbReference type="EMBL" id="MW974260">
    <property type="protein sequence ID" value="QTZ51883.1"/>
    <property type="molecule type" value="Genomic_RNA"/>
</dbReference>
<dbReference type="EMBL" id="MW974261">
    <property type="protein sequence ID" value="QTZ51895.1"/>
    <property type="molecule type" value="Genomic_RNA"/>
</dbReference>
<dbReference type="EMBL" id="MW974262">
    <property type="protein sequence ID" value="QTZ51907.1"/>
    <property type="molecule type" value="Genomic_RNA"/>
</dbReference>
<dbReference type="EMBL" id="MW974263">
    <property type="protein sequence ID" value="QTZ51919.1"/>
    <property type="molecule type" value="Genomic_RNA"/>
</dbReference>
<dbReference type="EMBL" id="MW974264">
    <property type="protein sequence ID" value="QTZ51931.1"/>
    <property type="molecule type" value="Genomic_RNA"/>
</dbReference>
<dbReference type="EMBL" id="MW974265">
    <property type="protein sequence ID" value="QTZ51943.1"/>
    <property type="molecule type" value="Genomic_RNA"/>
</dbReference>
<dbReference type="EMBL" id="MW974266">
    <property type="protein sequence ID" value="QTZ51955.1"/>
    <property type="molecule type" value="Genomic_RNA"/>
</dbReference>
<dbReference type="EMBL" id="MW974267">
    <property type="protein sequence ID" value="QTZ51967.1"/>
    <property type="molecule type" value="Genomic_RNA"/>
</dbReference>
<dbReference type="EMBL" id="MW974268">
    <property type="protein sequence ID" value="QTZ51979.1"/>
    <property type="molecule type" value="Genomic_RNA"/>
</dbReference>
<dbReference type="EMBL" id="MW974269">
    <property type="protein sequence ID" value="QTZ51991.1"/>
    <property type="molecule type" value="Genomic_RNA"/>
</dbReference>
<dbReference type="EMBL" id="MW974270">
    <property type="protein sequence ID" value="QTZ52003.1"/>
    <property type="molecule type" value="Genomic_RNA"/>
</dbReference>
<dbReference type="EMBL" id="MW974271">
    <property type="protein sequence ID" value="QTZ52015.1"/>
    <property type="molecule type" value="Genomic_RNA"/>
</dbReference>
<dbReference type="EMBL" id="MW974272">
    <property type="protein sequence ID" value="QTZ52027.1"/>
    <property type="molecule type" value="Genomic_RNA"/>
</dbReference>
<dbReference type="EMBL" id="MW974273">
    <property type="protein sequence ID" value="QTZ52039.1"/>
    <property type="molecule type" value="Genomic_RNA"/>
</dbReference>
<dbReference type="EMBL" id="MW974274">
    <property type="protein sequence ID" value="QTZ52051.1"/>
    <property type="molecule type" value="Genomic_RNA"/>
</dbReference>
<dbReference type="EMBL" id="MW974275">
    <property type="protein sequence ID" value="QTZ52063.1"/>
    <property type="molecule type" value="Genomic_RNA"/>
</dbReference>
<dbReference type="EMBL" id="MW974276">
    <property type="protein sequence ID" value="QTZ52075.1"/>
    <property type="molecule type" value="Genomic_RNA"/>
</dbReference>
<dbReference type="EMBL" id="MW974277">
    <property type="protein sequence ID" value="QTZ52087.1"/>
    <property type="molecule type" value="Genomic_RNA"/>
</dbReference>
<dbReference type="EMBL" id="MW974278">
    <property type="protein sequence ID" value="QTZ52099.1"/>
    <property type="molecule type" value="Genomic_RNA"/>
</dbReference>
<dbReference type="EMBL" id="MW974279">
    <property type="protein sequence ID" value="QTZ52111.1"/>
    <property type="molecule type" value="Genomic_RNA"/>
</dbReference>
<dbReference type="EMBL" id="MW974280">
    <property type="protein sequence ID" value="QTZ52123.1"/>
    <property type="molecule type" value="Genomic_RNA"/>
</dbReference>
<dbReference type="EMBL" id="MW974281">
    <property type="protein sequence ID" value="QTZ52135.1"/>
    <property type="molecule type" value="Genomic_RNA"/>
</dbReference>
<dbReference type="EMBL" id="MW974282">
    <property type="protein sequence ID" value="QTZ52147.1"/>
    <property type="molecule type" value="Genomic_RNA"/>
</dbReference>
<dbReference type="EMBL" id="MW974283">
    <property type="protein sequence ID" value="QTZ52159.1"/>
    <property type="molecule type" value="Genomic_RNA"/>
</dbReference>
<dbReference type="EMBL" id="MW974284">
    <property type="protein sequence ID" value="QTZ52171.1"/>
    <property type="molecule type" value="Genomic_RNA"/>
</dbReference>
<dbReference type="EMBL" id="MW974286">
    <property type="protein sequence ID" value="QTZ52195.1"/>
    <property type="molecule type" value="Genomic_RNA"/>
</dbReference>
<dbReference type="EMBL" id="MW974287">
    <property type="protein sequence ID" value="QTZ52207.1"/>
    <property type="molecule type" value="Genomic_RNA"/>
</dbReference>
<dbReference type="EMBL" id="MW974288">
    <property type="protein sequence ID" value="QTZ52219.1"/>
    <property type="molecule type" value="Genomic_RNA"/>
</dbReference>
<dbReference type="EMBL" id="MW974289">
    <property type="protein sequence ID" value="QTZ52231.1"/>
    <property type="molecule type" value="Genomic_RNA"/>
</dbReference>
<dbReference type="EMBL" id="MW974290">
    <property type="protein sequence ID" value="QTZ52243.1"/>
    <property type="molecule type" value="Genomic_RNA"/>
</dbReference>
<dbReference type="EMBL" id="MW974291">
    <property type="protein sequence ID" value="QTZ52255.1"/>
    <property type="molecule type" value="Genomic_RNA"/>
</dbReference>
<dbReference type="EMBL" id="MW974292">
    <property type="protein sequence ID" value="QTZ52267.1"/>
    <property type="molecule type" value="Genomic_RNA"/>
</dbReference>
<dbReference type="EMBL" id="MW974293">
    <property type="protein sequence ID" value="QTZ52279.1"/>
    <property type="molecule type" value="Genomic_RNA"/>
</dbReference>
<dbReference type="EMBL" id="MW974295">
    <property type="protein sequence ID" value="QTZ52303.1"/>
    <property type="molecule type" value="Genomic_RNA"/>
</dbReference>
<dbReference type="EMBL" id="MW974296">
    <property type="protein sequence ID" value="QTZ52315.1"/>
    <property type="molecule type" value="Genomic_RNA"/>
</dbReference>
<dbReference type="EMBL" id="MW974297">
    <property type="protein sequence ID" value="QTZ52327.1"/>
    <property type="molecule type" value="Genomic_RNA"/>
</dbReference>
<dbReference type="EMBL" id="MW974298">
    <property type="protein sequence ID" value="QTZ52339.1"/>
    <property type="molecule type" value="Genomic_RNA"/>
</dbReference>
<dbReference type="EMBL" id="MW974299">
    <property type="protein sequence ID" value="QTZ52351.1"/>
    <property type="molecule type" value="Genomic_RNA"/>
</dbReference>
<dbReference type="EMBL" id="MW974300">
    <property type="protein sequence ID" value="QTZ52363.1"/>
    <property type="molecule type" value="Genomic_RNA"/>
</dbReference>
<dbReference type="EMBL" id="MW974301">
    <property type="protein sequence ID" value="QTZ52375.1"/>
    <property type="molecule type" value="Genomic_RNA"/>
</dbReference>
<dbReference type="EMBL" id="MW974302">
    <property type="protein sequence ID" value="QTZ52387.1"/>
    <property type="molecule type" value="Genomic_RNA"/>
</dbReference>
<dbReference type="EMBL" id="MW974303">
    <property type="protein sequence ID" value="QTZ52399.1"/>
    <property type="molecule type" value="Genomic_RNA"/>
</dbReference>
<dbReference type="EMBL" id="MW974304">
    <property type="protein sequence ID" value="QTZ52411.1"/>
    <property type="molecule type" value="Genomic_RNA"/>
</dbReference>
<dbReference type="EMBL" id="MW974305">
    <property type="protein sequence ID" value="QTZ52423.1"/>
    <property type="molecule type" value="Genomic_RNA"/>
</dbReference>
<dbReference type="EMBL" id="MW974306">
    <property type="protein sequence ID" value="QTZ52435.1"/>
    <property type="molecule type" value="Genomic_RNA"/>
</dbReference>
<dbReference type="EMBL" id="MW974307">
    <property type="protein sequence ID" value="QTZ52447.1"/>
    <property type="molecule type" value="Genomic_RNA"/>
</dbReference>
<dbReference type="EMBL" id="MW974308">
    <property type="protein sequence ID" value="QTZ52459.1"/>
    <property type="molecule type" value="Genomic_RNA"/>
</dbReference>
<dbReference type="EMBL" id="MW974309">
    <property type="protein sequence ID" value="QTZ52471.1"/>
    <property type="molecule type" value="Genomic_RNA"/>
</dbReference>
<dbReference type="EMBL" id="MW974310">
    <property type="protein sequence ID" value="QTZ52483.1"/>
    <property type="molecule type" value="Genomic_RNA"/>
</dbReference>
<dbReference type="EMBL" id="MW974311">
    <property type="protein sequence ID" value="QTZ52495.1"/>
    <property type="molecule type" value="Genomic_RNA"/>
</dbReference>
<dbReference type="EMBL" id="MW974312">
    <property type="protein sequence ID" value="QTZ52507.1"/>
    <property type="molecule type" value="Genomic_RNA"/>
</dbReference>
<dbReference type="EMBL" id="MW974313">
    <property type="protein sequence ID" value="QTZ52519.1"/>
    <property type="molecule type" value="Genomic_RNA"/>
</dbReference>
<dbReference type="EMBL" id="MW974314">
    <property type="protein sequence ID" value="QTZ52531.1"/>
    <property type="molecule type" value="Genomic_RNA"/>
</dbReference>
<dbReference type="EMBL" id="MW974315">
    <property type="protein sequence ID" value="QTZ52543.1"/>
    <property type="molecule type" value="Genomic_RNA"/>
</dbReference>
<dbReference type="EMBL" id="MW974316">
    <property type="protein sequence ID" value="QTZ52554.1"/>
    <property type="molecule type" value="Genomic_RNA"/>
</dbReference>
<dbReference type="EMBL" id="MW974317">
    <property type="protein sequence ID" value="QTZ52566.1"/>
    <property type="molecule type" value="Genomic_RNA"/>
</dbReference>
<dbReference type="EMBL" id="MW974318">
    <property type="protein sequence ID" value="QTZ52578.1"/>
    <property type="molecule type" value="Genomic_RNA"/>
</dbReference>
<dbReference type="EMBL" id="MW974319">
    <property type="protein sequence ID" value="QTZ52590.1"/>
    <property type="molecule type" value="Genomic_RNA"/>
</dbReference>
<dbReference type="EMBL" id="MW974320">
    <property type="protein sequence ID" value="QTZ52602.1"/>
    <property type="molecule type" value="Genomic_RNA"/>
</dbReference>
<dbReference type="EMBL" id="MW974321">
    <property type="protein sequence ID" value="QTZ52614.1"/>
    <property type="molecule type" value="Genomic_RNA"/>
</dbReference>
<dbReference type="EMBL" id="MW974322">
    <property type="protein sequence ID" value="QTZ52626.1"/>
    <property type="molecule type" value="Genomic_RNA"/>
</dbReference>
<dbReference type="EMBL" id="MW974323">
    <property type="protein sequence ID" value="QTZ52637.1"/>
    <property type="molecule type" value="Genomic_RNA"/>
</dbReference>
<dbReference type="EMBL" id="MW974324">
    <property type="protein sequence ID" value="QTZ52649.1"/>
    <property type="molecule type" value="Genomic_RNA"/>
</dbReference>
<dbReference type="EMBL" id="MW974325">
    <property type="protein sequence ID" value="QTZ52661.1"/>
    <property type="molecule type" value="Genomic_RNA"/>
</dbReference>
<dbReference type="EMBL" id="MW974326">
    <property type="protein sequence ID" value="QTZ52673.1"/>
    <property type="molecule type" value="Genomic_RNA"/>
</dbReference>
<dbReference type="EMBL" id="MW974327">
    <property type="protein sequence ID" value="QTZ52685.1"/>
    <property type="molecule type" value="Genomic_RNA"/>
</dbReference>
<dbReference type="EMBL" id="MW974328">
    <property type="protein sequence ID" value="QTZ52697.1"/>
    <property type="molecule type" value="Genomic_RNA"/>
</dbReference>
<dbReference type="EMBL" id="MW974329">
    <property type="protein sequence ID" value="QTZ52709.1"/>
    <property type="molecule type" value="Genomic_RNA"/>
</dbReference>
<dbReference type="EMBL" id="MW974330">
    <property type="protein sequence ID" value="QTZ52721.1"/>
    <property type="molecule type" value="Genomic_RNA"/>
</dbReference>
<dbReference type="EMBL" id="MW974331">
    <property type="protein sequence ID" value="QTZ52733.1"/>
    <property type="molecule type" value="Genomic_RNA"/>
</dbReference>
<dbReference type="EMBL" id="MW974332">
    <property type="protein sequence ID" value="QTZ52745.1"/>
    <property type="molecule type" value="Genomic_RNA"/>
</dbReference>
<dbReference type="EMBL" id="MW974333">
    <property type="protein sequence ID" value="QTZ52757.1"/>
    <property type="molecule type" value="Genomic_RNA"/>
</dbReference>
<dbReference type="EMBL" id="MW974334">
    <property type="protein sequence ID" value="QTZ52769.1"/>
    <property type="molecule type" value="Genomic_RNA"/>
</dbReference>
<dbReference type="EMBL" id="MW974335">
    <property type="protein sequence ID" value="QTZ52781.1"/>
    <property type="molecule type" value="Genomic_RNA"/>
</dbReference>
<dbReference type="EMBL" id="MW974336">
    <property type="protein sequence ID" value="QTZ52793.1"/>
    <property type="molecule type" value="Genomic_RNA"/>
</dbReference>
<dbReference type="EMBL" id="MW974337">
    <property type="protein sequence ID" value="QTZ52805.1"/>
    <property type="molecule type" value="Genomic_RNA"/>
</dbReference>
<dbReference type="EMBL" id="MW974338">
    <property type="protein sequence ID" value="QTZ52817.1"/>
    <property type="molecule type" value="Genomic_RNA"/>
</dbReference>
<dbReference type="EMBL" id="MW974339">
    <property type="protein sequence ID" value="QTZ52829.1"/>
    <property type="molecule type" value="Genomic_RNA"/>
</dbReference>
<dbReference type="EMBL" id="MW974340">
    <property type="protein sequence ID" value="QTZ52841.1"/>
    <property type="molecule type" value="Genomic_RNA"/>
</dbReference>
<dbReference type="EMBL" id="MW974341">
    <property type="protein sequence ID" value="QTZ52853.1"/>
    <property type="molecule type" value="Genomic_RNA"/>
</dbReference>
<dbReference type="EMBL" id="MW974342">
    <property type="protein sequence ID" value="QTZ52865.1"/>
    <property type="molecule type" value="Genomic_RNA"/>
</dbReference>
<dbReference type="EMBL" id="MW974343">
    <property type="protein sequence ID" value="QTZ52877.1"/>
    <property type="molecule type" value="Genomic_RNA"/>
</dbReference>
<dbReference type="EMBL" id="MW974344">
    <property type="protein sequence ID" value="QTZ52889.1"/>
    <property type="molecule type" value="Genomic_RNA"/>
</dbReference>
<dbReference type="EMBL" id="MW974345">
    <property type="protein sequence ID" value="QTZ52901.1"/>
    <property type="molecule type" value="Genomic_RNA"/>
</dbReference>
<dbReference type="EMBL" id="MW974346">
    <property type="protein sequence ID" value="QTZ52913.1"/>
    <property type="molecule type" value="Genomic_RNA"/>
</dbReference>
<dbReference type="EMBL" id="MW974347">
    <property type="protein sequence ID" value="QTZ52925.1"/>
    <property type="molecule type" value="Genomic_RNA"/>
</dbReference>
<dbReference type="EMBL" id="MW974348">
    <property type="protein sequence ID" value="QTZ52937.1"/>
    <property type="molecule type" value="Genomic_RNA"/>
</dbReference>
<dbReference type="EMBL" id="MW974349">
    <property type="protein sequence ID" value="QTZ52949.1"/>
    <property type="molecule type" value="Genomic_RNA"/>
</dbReference>
<dbReference type="EMBL" id="MW974350">
    <property type="protein sequence ID" value="QTZ52961.1"/>
    <property type="molecule type" value="Genomic_RNA"/>
</dbReference>
<dbReference type="EMBL" id="MW974351">
    <property type="protein sequence ID" value="QTZ52973.1"/>
    <property type="molecule type" value="Genomic_RNA"/>
</dbReference>
<dbReference type="EMBL" id="MW974352">
    <property type="protein sequence ID" value="QTZ52985.1"/>
    <property type="molecule type" value="Genomic_RNA"/>
</dbReference>
<dbReference type="EMBL" id="MW974353">
    <property type="protein sequence ID" value="QTZ52997.1"/>
    <property type="molecule type" value="Genomic_RNA"/>
</dbReference>
<dbReference type="EMBL" id="MW974354">
    <property type="protein sequence ID" value="QTZ53009.1"/>
    <property type="molecule type" value="Genomic_RNA"/>
</dbReference>
<dbReference type="EMBL" id="MW974355">
    <property type="protein sequence ID" value="QTZ53021.1"/>
    <property type="molecule type" value="Genomic_RNA"/>
</dbReference>
<dbReference type="EMBL" id="MW974356">
    <property type="protein sequence ID" value="QTZ53033.1"/>
    <property type="molecule type" value="Genomic_RNA"/>
</dbReference>
<dbReference type="EMBL" id="MW974357">
    <property type="protein sequence ID" value="QTZ53045.1"/>
    <property type="molecule type" value="Genomic_RNA"/>
</dbReference>
<dbReference type="EMBL" id="MW974358">
    <property type="protein sequence ID" value="QTZ53057.1"/>
    <property type="molecule type" value="Genomic_RNA"/>
</dbReference>
<dbReference type="EMBL" id="MW974359">
    <property type="protein sequence ID" value="QTZ53069.1"/>
    <property type="molecule type" value="Genomic_RNA"/>
</dbReference>
<dbReference type="EMBL" id="MW974360">
    <property type="protein sequence ID" value="QTZ53081.1"/>
    <property type="molecule type" value="Genomic_RNA"/>
</dbReference>
<dbReference type="EMBL" id="MW974361">
    <property type="protein sequence ID" value="QTZ53093.1"/>
    <property type="molecule type" value="Genomic_RNA"/>
</dbReference>
<dbReference type="EMBL" id="MW974362">
    <property type="protein sequence ID" value="QTZ53105.1"/>
    <property type="molecule type" value="Genomic_RNA"/>
</dbReference>
<dbReference type="EMBL" id="MW974363">
    <property type="protein sequence ID" value="QTZ53117.1"/>
    <property type="molecule type" value="Genomic_RNA"/>
</dbReference>
<dbReference type="EMBL" id="MW974364">
    <property type="protein sequence ID" value="QTZ53129.1"/>
    <property type="molecule type" value="Genomic_RNA"/>
</dbReference>
<dbReference type="EMBL" id="MW974365">
    <property type="protein sequence ID" value="QTZ53141.1"/>
    <property type="molecule type" value="Genomic_RNA"/>
</dbReference>
<dbReference type="EMBL" id="MW974366">
    <property type="protein sequence ID" value="QTZ53153.1"/>
    <property type="molecule type" value="Genomic_RNA"/>
</dbReference>
<dbReference type="EMBL" id="MW974367">
    <property type="protein sequence ID" value="QTZ53165.1"/>
    <property type="molecule type" value="Genomic_RNA"/>
</dbReference>
<dbReference type="EMBL" id="MW974368">
    <property type="protein sequence ID" value="QTZ53177.1"/>
    <property type="molecule type" value="Genomic_RNA"/>
</dbReference>
<dbReference type="EMBL" id="MW974369">
    <property type="protein sequence ID" value="QTZ53189.1"/>
    <property type="molecule type" value="Genomic_RNA"/>
</dbReference>
<dbReference type="EMBL" id="MW974370">
    <property type="protein sequence ID" value="QTZ53201.1"/>
    <property type="molecule type" value="Genomic_RNA"/>
</dbReference>
<dbReference type="EMBL" id="MW974371">
    <property type="protein sequence ID" value="QTZ53213.1"/>
    <property type="molecule type" value="Genomic_RNA"/>
</dbReference>
<dbReference type="EMBL" id="MW974372">
    <property type="protein sequence ID" value="QTZ53225.1"/>
    <property type="molecule type" value="Genomic_RNA"/>
</dbReference>
<dbReference type="EMBL" id="MW974373">
    <property type="protein sequence ID" value="QTZ53237.1"/>
    <property type="molecule type" value="Genomic_RNA"/>
</dbReference>
<dbReference type="EMBL" id="MW974374">
    <property type="protein sequence ID" value="QTZ53249.1"/>
    <property type="molecule type" value="Genomic_RNA"/>
</dbReference>
<dbReference type="EMBL" id="MW974375">
    <property type="protein sequence ID" value="QTZ53261.1"/>
    <property type="molecule type" value="Genomic_RNA"/>
</dbReference>
<dbReference type="EMBL" id="MW974377">
    <property type="protein sequence ID" value="QTZ53285.1"/>
    <property type="molecule type" value="Genomic_RNA"/>
</dbReference>
<dbReference type="EMBL" id="MW974378">
    <property type="protein sequence ID" value="QTZ53297.1"/>
    <property type="molecule type" value="Genomic_RNA"/>
</dbReference>
<dbReference type="EMBL" id="MW974379">
    <property type="protein sequence ID" value="QTZ53309.1"/>
    <property type="molecule type" value="Genomic_RNA"/>
</dbReference>
<dbReference type="EMBL" id="MW974380">
    <property type="protein sequence ID" value="QTZ53321.1"/>
    <property type="molecule type" value="Genomic_RNA"/>
</dbReference>
<dbReference type="EMBL" id="MW974381">
    <property type="protein sequence ID" value="QTZ53333.1"/>
    <property type="molecule type" value="Genomic_RNA"/>
</dbReference>
<dbReference type="EMBL" id="MW974382">
    <property type="protein sequence ID" value="QTZ53345.1"/>
    <property type="molecule type" value="Genomic_RNA"/>
</dbReference>
<dbReference type="EMBL" id="MW974383">
    <property type="protein sequence ID" value="QTZ53357.1"/>
    <property type="molecule type" value="Genomic_RNA"/>
</dbReference>
<dbReference type="EMBL" id="MW974384">
    <property type="protein sequence ID" value="QTZ53369.1"/>
    <property type="molecule type" value="Genomic_RNA"/>
</dbReference>
<dbReference type="EMBL" id="MW974385">
    <property type="protein sequence ID" value="QTZ53381.1"/>
    <property type="molecule type" value="Genomic_RNA"/>
</dbReference>
<dbReference type="EMBL" id="MW974386">
    <property type="protein sequence ID" value="QTZ53393.1"/>
    <property type="molecule type" value="Genomic_RNA"/>
</dbReference>
<dbReference type="EMBL" id="MW974387">
    <property type="protein sequence ID" value="QTZ53405.1"/>
    <property type="molecule type" value="Genomic_RNA"/>
</dbReference>
<dbReference type="EMBL" id="MW974388">
    <property type="protein sequence ID" value="QTZ53417.1"/>
    <property type="molecule type" value="Genomic_RNA"/>
</dbReference>
<dbReference type="EMBL" id="MW974389">
    <property type="protein sequence ID" value="QTZ53429.1"/>
    <property type="molecule type" value="Genomic_RNA"/>
</dbReference>
<dbReference type="EMBL" id="MW974390">
    <property type="protein sequence ID" value="QTZ53441.1"/>
    <property type="molecule type" value="Genomic_RNA"/>
</dbReference>
<dbReference type="EMBL" id="MW974391">
    <property type="protein sequence ID" value="QTZ53453.1"/>
    <property type="molecule type" value="Genomic_RNA"/>
</dbReference>
<dbReference type="EMBL" id="MW974392">
    <property type="protein sequence ID" value="QTZ53465.1"/>
    <property type="molecule type" value="Genomic_RNA"/>
</dbReference>
<dbReference type="EMBL" id="MW974393">
    <property type="protein sequence ID" value="QTZ53477.1"/>
    <property type="molecule type" value="Genomic_RNA"/>
</dbReference>
<dbReference type="EMBL" id="MW974394">
    <property type="protein sequence ID" value="QTZ53489.1"/>
    <property type="molecule type" value="Genomic_RNA"/>
</dbReference>
<dbReference type="EMBL" id="MW974396">
    <property type="protein sequence ID" value="QTZ53512.1"/>
    <property type="molecule type" value="Genomic_RNA"/>
</dbReference>
<dbReference type="EMBL" id="MW974397">
    <property type="protein sequence ID" value="QTZ53524.1"/>
    <property type="molecule type" value="Genomic_RNA"/>
</dbReference>
<dbReference type="EMBL" id="MW974398">
    <property type="protein sequence ID" value="QTZ53536.1"/>
    <property type="molecule type" value="Genomic_RNA"/>
</dbReference>
<dbReference type="EMBL" id="MW974399">
    <property type="protein sequence ID" value="QTZ53548.1"/>
    <property type="molecule type" value="Genomic_RNA"/>
</dbReference>
<dbReference type="EMBL" id="MW974400">
    <property type="protein sequence ID" value="QTZ53560.1"/>
    <property type="molecule type" value="Genomic_RNA"/>
</dbReference>
<dbReference type="EMBL" id="MW974401">
    <property type="protein sequence ID" value="QTZ53572.1"/>
    <property type="molecule type" value="Genomic_RNA"/>
</dbReference>
<dbReference type="EMBL" id="MW974402">
    <property type="protein sequence ID" value="QTZ53584.1"/>
    <property type="molecule type" value="Genomic_RNA"/>
</dbReference>
<dbReference type="EMBL" id="MW974403">
    <property type="protein sequence ID" value="QTZ53596.1"/>
    <property type="molecule type" value="Genomic_RNA"/>
</dbReference>
<dbReference type="EMBL" id="MW974404">
    <property type="protein sequence ID" value="QTZ53608.1"/>
    <property type="molecule type" value="Genomic_RNA"/>
</dbReference>
<dbReference type="EMBL" id="MW974405">
    <property type="protein sequence ID" value="QTZ53620.1"/>
    <property type="molecule type" value="Genomic_RNA"/>
</dbReference>
<dbReference type="EMBL" id="MW974406">
    <property type="protein sequence ID" value="QTZ53632.1"/>
    <property type="molecule type" value="Genomic_RNA"/>
</dbReference>
<dbReference type="EMBL" id="MW974407">
    <property type="protein sequence ID" value="QTZ53644.1"/>
    <property type="molecule type" value="Genomic_RNA"/>
</dbReference>
<dbReference type="EMBL" id="MW974408">
    <property type="protein sequence ID" value="QTZ53656.1"/>
    <property type="molecule type" value="Genomic_RNA"/>
</dbReference>
<dbReference type="EMBL" id="MW974409">
    <property type="protein sequence ID" value="QTZ53668.1"/>
    <property type="molecule type" value="Genomic_RNA"/>
</dbReference>
<dbReference type="EMBL" id="MW974410">
    <property type="protein sequence ID" value="QTZ53680.1"/>
    <property type="molecule type" value="Genomic_RNA"/>
</dbReference>
<dbReference type="EMBL" id="MW974411">
    <property type="protein sequence ID" value="QTZ53692.1"/>
    <property type="molecule type" value="Genomic_RNA"/>
</dbReference>
<dbReference type="EMBL" id="MW974412">
    <property type="protein sequence ID" value="QTZ53704.1"/>
    <property type="molecule type" value="Genomic_RNA"/>
</dbReference>
<dbReference type="EMBL" id="MW974413">
    <property type="protein sequence ID" value="QTZ53715.1"/>
    <property type="molecule type" value="Genomic_RNA"/>
</dbReference>
<dbReference type="EMBL" id="MW974414">
    <property type="protein sequence ID" value="QTZ53727.1"/>
    <property type="molecule type" value="Genomic_RNA"/>
</dbReference>
<dbReference type="EMBL" id="MW974415">
    <property type="protein sequence ID" value="QTZ53739.1"/>
    <property type="molecule type" value="Genomic_RNA"/>
</dbReference>
<dbReference type="EMBL" id="MW974416">
    <property type="protein sequence ID" value="QTZ53751.1"/>
    <property type="molecule type" value="Genomic_RNA"/>
</dbReference>
<dbReference type="EMBL" id="MW974418">
    <property type="protein sequence ID" value="QTZ53775.1"/>
    <property type="molecule type" value="Genomic_RNA"/>
</dbReference>
<dbReference type="EMBL" id="MW974419">
    <property type="protein sequence ID" value="QTZ53787.1"/>
    <property type="molecule type" value="Genomic_RNA"/>
</dbReference>
<dbReference type="EMBL" id="MW974420">
    <property type="protein sequence ID" value="QTZ53799.1"/>
    <property type="molecule type" value="Genomic_RNA"/>
</dbReference>
<dbReference type="EMBL" id="MW974421">
    <property type="protein sequence ID" value="QTZ53811.1"/>
    <property type="molecule type" value="Genomic_RNA"/>
</dbReference>
<dbReference type="EMBL" id="MW974422">
    <property type="protein sequence ID" value="QTZ53823.1"/>
    <property type="molecule type" value="Genomic_RNA"/>
</dbReference>
<dbReference type="EMBL" id="MW974423">
    <property type="protein sequence ID" value="QTZ53835.1"/>
    <property type="molecule type" value="Genomic_RNA"/>
</dbReference>
<dbReference type="EMBL" id="MW974424">
    <property type="protein sequence ID" value="QTZ53847.1"/>
    <property type="molecule type" value="Genomic_RNA"/>
</dbReference>
<dbReference type="EMBL" id="MW974425">
    <property type="protein sequence ID" value="QTZ53859.1"/>
    <property type="molecule type" value="Genomic_RNA"/>
</dbReference>
<dbReference type="EMBL" id="MW974426">
    <property type="protein sequence ID" value="QTZ53871.1"/>
    <property type="molecule type" value="Genomic_RNA"/>
</dbReference>
<dbReference type="EMBL" id="MW974427">
    <property type="protein sequence ID" value="QTZ53883.1"/>
    <property type="molecule type" value="Genomic_RNA"/>
</dbReference>
<dbReference type="EMBL" id="MW974428">
    <property type="protein sequence ID" value="QTZ53895.1"/>
    <property type="molecule type" value="Genomic_RNA"/>
</dbReference>
<dbReference type="EMBL" id="MW974429">
    <property type="protein sequence ID" value="QTZ53907.1"/>
    <property type="molecule type" value="Genomic_RNA"/>
</dbReference>
<dbReference type="EMBL" id="MW974430">
    <property type="protein sequence ID" value="QTZ53919.1"/>
    <property type="molecule type" value="Genomic_RNA"/>
</dbReference>
<dbReference type="EMBL" id="MW974431">
    <property type="protein sequence ID" value="QTZ53931.1"/>
    <property type="molecule type" value="Genomic_RNA"/>
</dbReference>
<dbReference type="EMBL" id="MW974432">
    <property type="protein sequence ID" value="QTZ53943.1"/>
    <property type="molecule type" value="Genomic_RNA"/>
</dbReference>
<dbReference type="EMBL" id="MW974433">
    <property type="protein sequence ID" value="QTZ53955.1"/>
    <property type="molecule type" value="Genomic_RNA"/>
</dbReference>
<dbReference type="EMBL" id="MW974434">
    <property type="protein sequence ID" value="QTZ53967.1"/>
    <property type="molecule type" value="Genomic_RNA"/>
</dbReference>
<dbReference type="EMBL" id="MW974435">
    <property type="protein sequence ID" value="QTZ53979.1"/>
    <property type="molecule type" value="Genomic_RNA"/>
</dbReference>
<dbReference type="EMBL" id="MW974436">
    <property type="protein sequence ID" value="QTZ53991.1"/>
    <property type="molecule type" value="Genomic_RNA"/>
</dbReference>
<dbReference type="EMBL" id="MW974437">
    <property type="protein sequence ID" value="QTZ54003.1"/>
    <property type="molecule type" value="Genomic_RNA"/>
</dbReference>
<dbReference type="EMBL" id="MW974438">
    <property type="protein sequence ID" value="QTZ54015.1"/>
    <property type="molecule type" value="Genomic_RNA"/>
</dbReference>
<dbReference type="EMBL" id="MW974439">
    <property type="protein sequence ID" value="QTZ54027.1"/>
    <property type="molecule type" value="Genomic_RNA"/>
</dbReference>
<dbReference type="EMBL" id="MW974442">
    <property type="protein sequence ID" value="QTZ54063.1"/>
    <property type="molecule type" value="Genomic_RNA"/>
</dbReference>
<dbReference type="EMBL" id="MW974443">
    <property type="protein sequence ID" value="QTZ54075.1"/>
    <property type="molecule type" value="Genomic_RNA"/>
</dbReference>
<dbReference type="EMBL" id="MW974444">
    <property type="protein sequence ID" value="QTZ54087.1"/>
    <property type="molecule type" value="Genomic_RNA"/>
</dbReference>
<dbReference type="EMBL" id="MW974445">
    <property type="protein sequence ID" value="QTZ54099.1"/>
    <property type="molecule type" value="Genomic_RNA"/>
</dbReference>
<dbReference type="EMBL" id="MW974446">
    <property type="protein sequence ID" value="QTZ54111.1"/>
    <property type="molecule type" value="Genomic_RNA"/>
</dbReference>
<dbReference type="EMBL" id="MW974447">
    <property type="protein sequence ID" value="QTZ54123.1"/>
    <property type="molecule type" value="Genomic_RNA"/>
</dbReference>
<dbReference type="EMBL" id="MW974448">
    <property type="protein sequence ID" value="QTZ54135.1"/>
    <property type="molecule type" value="Genomic_RNA"/>
</dbReference>
<dbReference type="EMBL" id="MW974449">
    <property type="protein sequence ID" value="QTZ54147.1"/>
    <property type="molecule type" value="Genomic_RNA"/>
</dbReference>
<dbReference type="EMBL" id="MW974450">
    <property type="protein sequence ID" value="QTZ54159.1"/>
    <property type="molecule type" value="Genomic_RNA"/>
</dbReference>
<dbReference type="EMBL" id="MW974452">
    <property type="protein sequence ID" value="QTZ54183.1"/>
    <property type="molecule type" value="Genomic_RNA"/>
</dbReference>
<dbReference type="EMBL" id="MW974453">
    <property type="protein sequence ID" value="QTZ54195.1"/>
    <property type="molecule type" value="Genomic_RNA"/>
</dbReference>
<dbReference type="EMBL" id="MW974454">
    <property type="protein sequence ID" value="QTZ54205.1"/>
    <property type="molecule type" value="Genomic_RNA"/>
</dbReference>
<dbReference type="EMBL" id="MW974455">
    <property type="protein sequence ID" value="QTZ54216.1"/>
    <property type="molecule type" value="Genomic_RNA"/>
</dbReference>
<dbReference type="EMBL" id="MW974456">
    <property type="protein sequence ID" value="QTZ54227.1"/>
    <property type="molecule type" value="Genomic_RNA"/>
</dbReference>
<dbReference type="EMBL" id="MW974457">
    <property type="protein sequence ID" value="QTZ54239.1"/>
    <property type="molecule type" value="Genomic_RNA"/>
</dbReference>
<dbReference type="EMBL" id="MW974458">
    <property type="protein sequence ID" value="QTZ54251.1"/>
    <property type="molecule type" value="Genomic_RNA"/>
</dbReference>
<dbReference type="EMBL" id="MW974459">
    <property type="protein sequence ID" value="QTZ54263.1"/>
    <property type="molecule type" value="Genomic_RNA"/>
</dbReference>
<dbReference type="EMBL" id="MW974461">
    <property type="protein sequence ID" value="QTZ54285.1"/>
    <property type="molecule type" value="Genomic_RNA"/>
</dbReference>
<dbReference type="EMBL" id="MW974462">
    <property type="protein sequence ID" value="QTZ54297.1"/>
    <property type="molecule type" value="Genomic_RNA"/>
</dbReference>
<dbReference type="EMBL" id="MW974463">
    <property type="protein sequence ID" value="QTZ54309.1"/>
    <property type="molecule type" value="Genomic_RNA"/>
</dbReference>
<dbReference type="EMBL" id="MW974464">
    <property type="protein sequence ID" value="QTZ54321.1"/>
    <property type="molecule type" value="Genomic_RNA"/>
</dbReference>
<dbReference type="EMBL" id="MW974465">
    <property type="protein sequence ID" value="QTZ54333.1"/>
    <property type="molecule type" value="Genomic_RNA"/>
</dbReference>
<dbReference type="EMBL" id="MW974466">
    <property type="protein sequence ID" value="QTZ54345.1"/>
    <property type="molecule type" value="Genomic_RNA"/>
</dbReference>
<dbReference type="EMBL" id="MW974467">
    <property type="protein sequence ID" value="QTZ54357.1"/>
    <property type="molecule type" value="Genomic_RNA"/>
</dbReference>
<dbReference type="EMBL" id="MW974468">
    <property type="protein sequence ID" value="QTZ54369.1"/>
    <property type="molecule type" value="Genomic_RNA"/>
</dbReference>
<dbReference type="EMBL" id="MW974469">
    <property type="protein sequence ID" value="QTZ54381.1"/>
    <property type="molecule type" value="Genomic_RNA"/>
</dbReference>
<dbReference type="EMBL" id="MW974470">
    <property type="protein sequence ID" value="QTZ54393.1"/>
    <property type="molecule type" value="Genomic_RNA"/>
</dbReference>
<dbReference type="EMBL" id="MW974471">
    <property type="protein sequence ID" value="QTZ54405.1"/>
    <property type="molecule type" value="Genomic_RNA"/>
</dbReference>
<dbReference type="EMBL" id="MW974472">
    <property type="protein sequence ID" value="QTZ54417.1"/>
    <property type="molecule type" value="Genomic_RNA"/>
</dbReference>
<dbReference type="EMBL" id="MW974474">
    <property type="protein sequence ID" value="QTZ54441.1"/>
    <property type="molecule type" value="Genomic_RNA"/>
</dbReference>
<dbReference type="EMBL" id="MW974475">
    <property type="protein sequence ID" value="QTZ54453.1"/>
    <property type="molecule type" value="Genomic_RNA"/>
</dbReference>
<dbReference type="EMBL" id="MW974476">
    <property type="protein sequence ID" value="QTZ54465.1"/>
    <property type="molecule type" value="Genomic_RNA"/>
</dbReference>
<dbReference type="EMBL" id="MW974477">
    <property type="protein sequence ID" value="QTZ54477.1"/>
    <property type="molecule type" value="Genomic_RNA"/>
</dbReference>
<dbReference type="EMBL" id="MW974478">
    <property type="protein sequence ID" value="QTZ54489.1"/>
    <property type="molecule type" value="Genomic_RNA"/>
</dbReference>
<dbReference type="EMBL" id="MW974479">
    <property type="protein sequence ID" value="QTZ54501.1"/>
    <property type="molecule type" value="Genomic_RNA"/>
</dbReference>
<dbReference type="EMBL" id="MW974480">
    <property type="protein sequence ID" value="QTZ54513.1"/>
    <property type="molecule type" value="Genomic_RNA"/>
</dbReference>
<dbReference type="EMBL" id="MW974481">
    <property type="protein sequence ID" value="QTZ54525.1"/>
    <property type="molecule type" value="Genomic_RNA"/>
</dbReference>
<dbReference type="EMBL" id="MW974482">
    <property type="protein sequence ID" value="QTZ54537.1"/>
    <property type="molecule type" value="Genomic_RNA"/>
</dbReference>
<dbReference type="EMBL" id="MW974483">
    <property type="protein sequence ID" value="QTZ54549.1"/>
    <property type="molecule type" value="Genomic_RNA"/>
</dbReference>
<dbReference type="EMBL" id="MW974484">
    <property type="protein sequence ID" value="QTZ54561.1"/>
    <property type="molecule type" value="Genomic_RNA"/>
</dbReference>
<dbReference type="EMBL" id="MW974485">
    <property type="protein sequence ID" value="QTZ54573.1"/>
    <property type="molecule type" value="Genomic_RNA"/>
</dbReference>
<dbReference type="EMBL" id="MW974486">
    <property type="protein sequence ID" value="QTZ54585.1"/>
    <property type="molecule type" value="Genomic_RNA"/>
</dbReference>
<dbReference type="EMBL" id="MW974487">
    <property type="protein sequence ID" value="QTZ54597.1"/>
    <property type="molecule type" value="Genomic_RNA"/>
</dbReference>
<dbReference type="EMBL" id="MW974488">
    <property type="protein sequence ID" value="QTZ54609.1"/>
    <property type="molecule type" value="Genomic_RNA"/>
</dbReference>
<dbReference type="EMBL" id="MW974489">
    <property type="protein sequence ID" value="QTZ54621.1"/>
    <property type="molecule type" value="Genomic_RNA"/>
</dbReference>
<dbReference type="EMBL" id="MW974490">
    <property type="protein sequence ID" value="QTZ54633.1"/>
    <property type="molecule type" value="Genomic_RNA"/>
</dbReference>
<dbReference type="EMBL" id="MW974491">
    <property type="protein sequence ID" value="QTZ54645.1"/>
    <property type="molecule type" value="Genomic_RNA"/>
</dbReference>
<dbReference type="EMBL" id="MW974492">
    <property type="protein sequence ID" value="QTZ54657.1"/>
    <property type="molecule type" value="Genomic_RNA"/>
</dbReference>
<dbReference type="EMBL" id="MW974493">
    <property type="protein sequence ID" value="QTZ54669.1"/>
    <property type="molecule type" value="Genomic_RNA"/>
</dbReference>
<dbReference type="EMBL" id="MW974494">
    <property type="protein sequence ID" value="QTZ54681.1"/>
    <property type="molecule type" value="Genomic_RNA"/>
</dbReference>
<dbReference type="EMBL" id="MW974495">
    <property type="protein sequence ID" value="QTZ54693.1"/>
    <property type="molecule type" value="Genomic_RNA"/>
</dbReference>
<dbReference type="EMBL" id="MW974497">
    <property type="protein sequence ID" value="QTZ54717.1"/>
    <property type="molecule type" value="Genomic_RNA"/>
</dbReference>
<dbReference type="EMBL" id="MW974498">
    <property type="protein sequence ID" value="QTZ54729.1"/>
    <property type="molecule type" value="Genomic_RNA"/>
</dbReference>
<dbReference type="EMBL" id="MW974499">
    <property type="protein sequence ID" value="QTZ54741.1"/>
    <property type="molecule type" value="Genomic_RNA"/>
</dbReference>
<dbReference type="EMBL" id="MW974500">
    <property type="protein sequence ID" value="QTZ54753.1"/>
    <property type="molecule type" value="Genomic_RNA"/>
</dbReference>
<dbReference type="EMBL" id="MW974501">
    <property type="protein sequence ID" value="QTZ54765.1"/>
    <property type="molecule type" value="Genomic_RNA"/>
</dbReference>
<dbReference type="EMBL" id="MW974502">
    <property type="protein sequence ID" value="QTZ54777.1"/>
    <property type="molecule type" value="Genomic_RNA"/>
</dbReference>
<dbReference type="EMBL" id="MW974503">
    <property type="protein sequence ID" value="QTZ54789.1"/>
    <property type="molecule type" value="Genomic_RNA"/>
</dbReference>
<dbReference type="EMBL" id="MW974504">
    <property type="protein sequence ID" value="QTZ54801.1"/>
    <property type="molecule type" value="Genomic_RNA"/>
</dbReference>
<dbReference type="EMBL" id="MW974505">
    <property type="protein sequence ID" value="QTZ54813.1"/>
    <property type="molecule type" value="Genomic_RNA"/>
</dbReference>
<dbReference type="EMBL" id="MW974506">
    <property type="protein sequence ID" value="QTZ54825.1"/>
    <property type="molecule type" value="Genomic_RNA"/>
</dbReference>
<dbReference type="EMBL" id="MW974507">
    <property type="protein sequence ID" value="QTZ54837.1"/>
    <property type="molecule type" value="Genomic_RNA"/>
</dbReference>
<dbReference type="EMBL" id="MW974508">
    <property type="protein sequence ID" value="QTZ54849.1"/>
    <property type="molecule type" value="Genomic_RNA"/>
</dbReference>
<dbReference type="EMBL" id="MW974509">
    <property type="protein sequence ID" value="QTZ54861.1"/>
    <property type="molecule type" value="Genomic_RNA"/>
</dbReference>
<dbReference type="EMBL" id="MW974510">
    <property type="protein sequence ID" value="QTZ54873.1"/>
    <property type="molecule type" value="Genomic_RNA"/>
</dbReference>
<dbReference type="EMBL" id="MW974511">
    <property type="protein sequence ID" value="QTZ54885.1"/>
    <property type="molecule type" value="Genomic_RNA"/>
</dbReference>
<dbReference type="EMBL" id="MW974512">
    <property type="protein sequence ID" value="QTZ54897.1"/>
    <property type="molecule type" value="Genomic_RNA"/>
</dbReference>
<dbReference type="EMBL" id="MW974513">
    <property type="protein sequence ID" value="QTZ54909.1"/>
    <property type="molecule type" value="Genomic_RNA"/>
</dbReference>
<dbReference type="EMBL" id="MW974514">
    <property type="protein sequence ID" value="QTZ54921.1"/>
    <property type="molecule type" value="Genomic_RNA"/>
</dbReference>
<dbReference type="EMBL" id="MW974515">
    <property type="protein sequence ID" value="QTZ54933.1"/>
    <property type="molecule type" value="Genomic_RNA"/>
</dbReference>
<dbReference type="EMBL" id="MW974517">
    <property type="protein sequence ID" value="QTZ54956.1"/>
    <property type="molecule type" value="Genomic_RNA"/>
</dbReference>
<dbReference type="EMBL" id="MW974520">
    <property type="protein sequence ID" value="QTZ54990.1"/>
    <property type="molecule type" value="Genomic_RNA"/>
</dbReference>
<dbReference type="EMBL" id="MW974522">
    <property type="protein sequence ID" value="QTZ55014.1"/>
    <property type="molecule type" value="Genomic_RNA"/>
</dbReference>
<dbReference type="EMBL" id="MW974523">
    <property type="protein sequence ID" value="QTZ55026.1"/>
    <property type="molecule type" value="Genomic_RNA"/>
</dbReference>
<dbReference type="EMBL" id="MW974524">
    <property type="protein sequence ID" value="QTZ55038.1"/>
    <property type="molecule type" value="Genomic_RNA"/>
</dbReference>
<dbReference type="EMBL" id="MW974526">
    <property type="protein sequence ID" value="QTZ55061.1"/>
    <property type="molecule type" value="Genomic_RNA"/>
</dbReference>
<dbReference type="EMBL" id="MW974528">
    <property type="protein sequence ID" value="QTZ55085.1"/>
    <property type="molecule type" value="Genomic_RNA"/>
</dbReference>
<dbReference type="EMBL" id="MW974529">
    <property type="protein sequence ID" value="QTZ55097.1"/>
    <property type="molecule type" value="Genomic_RNA"/>
</dbReference>
<dbReference type="EMBL" id="MW974532">
    <property type="protein sequence ID" value="QTZ55131.1"/>
    <property type="molecule type" value="Genomic_RNA"/>
</dbReference>
<dbReference type="EMBL" id="MW974533">
    <property type="protein sequence ID" value="QTZ55143.1"/>
    <property type="molecule type" value="Genomic_RNA"/>
</dbReference>
<dbReference type="EMBL" id="MW974534">
    <property type="protein sequence ID" value="QTZ55154.1"/>
    <property type="molecule type" value="Genomic_RNA"/>
</dbReference>
<dbReference type="EMBL" id="MW974535">
    <property type="protein sequence ID" value="QTZ55164.1"/>
    <property type="molecule type" value="Genomic_RNA"/>
</dbReference>
<dbReference type="EMBL" id="MW974536">
    <property type="protein sequence ID" value="QTZ55174.1"/>
    <property type="molecule type" value="Genomic_RNA"/>
</dbReference>
<dbReference type="EMBL" id="MW974537">
    <property type="protein sequence ID" value="QTZ55186.1"/>
    <property type="molecule type" value="Genomic_RNA"/>
</dbReference>
<dbReference type="EMBL" id="MW974538">
    <property type="protein sequence ID" value="QTZ55198.1"/>
    <property type="molecule type" value="Genomic_RNA"/>
</dbReference>
<dbReference type="EMBL" id="MW974539">
    <property type="protein sequence ID" value="QTZ55210.1"/>
    <property type="molecule type" value="Genomic_RNA"/>
</dbReference>
<dbReference type="EMBL" id="MW974540">
    <property type="protein sequence ID" value="QTZ55222.1"/>
    <property type="molecule type" value="Genomic_RNA"/>
</dbReference>
<dbReference type="EMBL" id="MW974541">
    <property type="protein sequence ID" value="QTZ55234.1"/>
    <property type="molecule type" value="Genomic_RNA"/>
</dbReference>
<dbReference type="EMBL" id="MW974542">
    <property type="protein sequence ID" value="QTZ55246.1"/>
    <property type="molecule type" value="Genomic_RNA"/>
</dbReference>
<dbReference type="EMBL" id="MW974543">
    <property type="protein sequence ID" value="QTZ55258.1"/>
    <property type="molecule type" value="Genomic_RNA"/>
</dbReference>
<dbReference type="EMBL" id="MW974544">
    <property type="protein sequence ID" value="QTZ55270.1"/>
    <property type="molecule type" value="Genomic_RNA"/>
</dbReference>
<dbReference type="EMBL" id="MW974545">
    <property type="protein sequence ID" value="QTZ55282.1"/>
    <property type="molecule type" value="Genomic_RNA"/>
</dbReference>
<dbReference type="EMBL" id="MW974546">
    <property type="protein sequence ID" value="QTZ55294.1"/>
    <property type="molecule type" value="Genomic_RNA"/>
</dbReference>
<dbReference type="EMBL" id="MW974547">
    <property type="protein sequence ID" value="QTZ55306.1"/>
    <property type="molecule type" value="Genomic_RNA"/>
</dbReference>
<dbReference type="EMBL" id="MW974549">
    <property type="protein sequence ID" value="QTZ55330.1"/>
    <property type="molecule type" value="Genomic_RNA"/>
</dbReference>
<dbReference type="EMBL" id="MW974550">
    <property type="protein sequence ID" value="QTZ55342.1"/>
    <property type="molecule type" value="Genomic_RNA"/>
</dbReference>
<dbReference type="RefSeq" id="YP_009725255.1">
    <property type="nucleotide sequence ID" value="NC_045512.2"/>
</dbReference>
<dbReference type="PDB" id="7YC2">
    <property type="method" value="X-ray"/>
    <property type="resolution" value="2.90 A"/>
    <property type="chains" value="E/F/G/H=2-8"/>
</dbReference>
<dbReference type="PDBsum" id="7YC2"/>
<dbReference type="SMR" id="A0A663DJA2"/>
<dbReference type="BioGRID" id="4383867">
    <property type="interactions" value="1044"/>
</dbReference>
<dbReference type="FunCoup" id="A0A663DJA2">
    <property type="interactions" value="217"/>
</dbReference>
<dbReference type="IntAct" id="A0A663DJA2">
    <property type="interactions" value="47"/>
</dbReference>
<dbReference type="MINT" id="A0A663DJA2"/>
<dbReference type="DNASU" id="43740576"/>
<dbReference type="GeneID" id="43740576"/>
<dbReference type="AGR" id="RefSeq:YP_009725255"/>
<dbReference type="PRO" id="PR:A0A663DJA2"/>
<dbReference type="Proteomes" id="UP000464024">
    <property type="component" value="Genome"/>
</dbReference>
<dbReference type="CDD" id="cd21597">
    <property type="entry name" value="SARS-CoV-2_Orf10"/>
    <property type="match status" value="1"/>
</dbReference>
<dbReference type="InterPro" id="IPR044342">
    <property type="entry name" value="Orf10_SARS-CoV-2"/>
</dbReference>
<organismHost>
    <name type="scientific">Homo sapiens</name>
    <name type="common">Human</name>
    <dbReference type="NCBI Taxonomy" id="9606"/>
</organismHost>
<reference key="1">
    <citation type="journal article" date="2020" name="Cell">
        <title>A Mouse-Adapted SARS-CoV-2 Induces Acute Lung Injury and Mortality in Standard Laboratory Mice.</title>
        <authorList>
            <person name="Leist S.R."/>
            <person name="Dinnon K.H. III"/>
            <person name="Schaefer A."/>
            <person name="Tse L.V."/>
            <person name="Okuda K."/>
            <person name="Hou Y.J."/>
            <person name="West A."/>
            <person name="Edwards C.E."/>
            <person name="Sanders W."/>
            <person name="Fritch E.J."/>
            <person name="Gully K.L."/>
            <person name="Scobey T."/>
            <person name="Brown A.J."/>
            <person name="Sheahan T.P."/>
            <person name="Moorman N.J."/>
            <person name="Boucher R.C."/>
            <person name="Gralinski L.E."/>
            <person name="Montgomery S.A."/>
            <person name="Baric R.S."/>
        </authorList>
    </citation>
    <scope>NUCLEOTIDE SEQUENCE [GENOMIC RNA]</scope>
</reference>
<reference key="2">
    <citation type="journal article" date="2020" name="Cell">
        <title>Case Study: Prolonged Infectious SARS-CoV-2 Shedding from an Asymptomatic Immunocompromised Individual with Cancer.</title>
        <authorList>
            <person name="Avanzato V.A."/>
            <person name="Matson M.J."/>
            <person name="Seifert S.N."/>
            <person name="Pryce R."/>
            <person name="Williamson B.N."/>
            <person name="Anzick S.L."/>
            <person name="Barbian K."/>
            <person name="Judson S.D."/>
            <person name="Fischer E.R."/>
            <person name="Martens C."/>
            <person name="Bowden T.A."/>
            <person name="de Wit E."/>
            <person name="Riedo F.X."/>
            <person name="Munster V.J."/>
        </authorList>
    </citation>
    <scope>NUCLEOTIDE SEQUENCE [GENOMIC RNA]</scope>
</reference>
<reference key="3">
    <citation type="journal article" date="2020" name="Clin. Infect. Dis.">
        <title>Associations of Early COVID-19 Cases in San Francisco with Domestic and International Travel.</title>
        <authorList>
            <person name="Gu W."/>
            <person name="Deng X."/>
            <person name="Reyes K."/>
            <person name="Hsu E."/>
            <person name="Wang C."/>
            <person name="Sotomayor-Gonzalez A."/>
            <person name="Federman S."/>
            <person name="Bushnell B."/>
            <person name="Miller S."/>
            <person name="Chiu C."/>
        </authorList>
    </citation>
    <scope>NUCLEOTIDE SEQUENCE [GENOMIC RNA]</scope>
</reference>
<reference key="4">
    <citation type="journal article" date="2020" name="Clin. Microbiol. Infect.">
        <title>Molecular characterization of SARS-CoV-2 from the first case of COVID-19 in Italy.</title>
        <authorList>
            <person name="Capobianchi M.R."/>
            <person name="Rueca M."/>
            <person name="Messina F."/>
            <person name="Giombini E."/>
            <person name="Carletti F."/>
            <person name="Colavita F."/>
            <person name="Castilletti C."/>
            <person name="Lalle E."/>
            <person name="Bordi L."/>
            <person name="Vairo F."/>
            <person name="Nicastri E."/>
            <person name="Ippolito G."/>
            <person name="Maria Gruber C.E."/>
            <person name="Bartolini B."/>
        </authorList>
    </citation>
    <scope>NUCLEOTIDE SEQUENCE [GENOMIC RNA]</scope>
</reference>
<reference key="5">
    <citation type="journal article" date="2020" name="Emerg. Infect. Dis.">
        <title>Severe Acute Respiratory Syndrome Coronavirus 2 from Patient with Coronavirus Disease, United States.</title>
        <authorList>
            <person name="Harcourt J."/>
            <person name="Tamin A."/>
            <person name="Lu X."/>
            <person name="Kamili S."/>
            <person name="Sakthivel S.K."/>
            <person name="Murray J."/>
            <person name="Queen K."/>
            <person name="Tao Y."/>
            <person name="Paden C.R."/>
            <person name="Zhang J."/>
            <person name="Li Y."/>
            <person name="Uehara A."/>
            <person name="Wang H."/>
            <person name="Goldsmith C."/>
            <person name="Bullock H.A."/>
            <person name="Wang L."/>
            <person name="Whitaker B."/>
            <person name="Lynch B."/>
            <person name="Gautam R."/>
            <person name="Schindewolf C."/>
            <person name="Lokugamage K.G."/>
            <person name="Scharton D."/>
            <person name="Plante J.A."/>
            <person name="Mirchandani D."/>
            <person name="Widen S.G."/>
            <person name="Narayanan K."/>
            <person name="Makino S."/>
            <person name="Ksiazek T.G."/>
            <person name="Plante K.S."/>
            <person name="Weaver S.C."/>
            <person name="Lindstrom S."/>
            <person name="Tong S."/>
            <person name="Menachery V.D."/>
            <person name="Thornburg N.J."/>
        </authorList>
    </citation>
    <scope>NUCLEOTIDE SEQUENCE [GENOMIC RNA]</scope>
</reference>
<reference key="6">
    <citation type="journal article" date="2020" name="Emerg. Infect. Dis.">
        <title>Possible Bat Origin of Severe Acute Respiratory Syndrome Coronavirus 2.</title>
        <authorList>
            <person name="Lau S.K.P."/>
            <person name="Luk H.K.H."/>
            <person name="Wong A.C.P."/>
            <person name="Li K.S.M."/>
            <person name="Zhu L."/>
            <person name="He Z."/>
            <person name="Fung J."/>
            <person name="Chan T.T.Y."/>
            <person name="Fung K.S.C."/>
            <person name="Woo P.C.Y."/>
        </authorList>
    </citation>
    <scope>NUCLEOTIDE SEQUENCE [GENOMIC RNA]</scope>
</reference>
<reference key="7">
    <citation type="journal article" date="2020" name="Emerg. Infect. Dis.">
        <title>SARS-CoV-2 Phylogenetic Analysis, Lazio Region, Italy, February-March 2020.</title>
        <authorList>
            <person name="Bartolini B."/>
            <person name="Rueca M."/>
            <person name="Gruber C.E.M."/>
            <person name="Messina F."/>
            <person name="Carletti F."/>
            <person name="Giombini E."/>
            <person name="Lalle E."/>
            <person name="Bordi L."/>
            <person name="Matusali G."/>
            <person name="Colavita F."/>
            <person name="Castilletti C."/>
            <person name="Vairo F."/>
            <person name="Ippolito G."/>
            <person name="Capobianchi M.R."/>
            <person name="Di Caro A."/>
        </authorList>
    </citation>
    <scope>NUCLEOTIDE SEQUENCE [GENOMIC RNA]</scope>
</reference>
<reference key="8">
    <citation type="journal article" date="2020" name="Emerg. Microbes Infect.">
        <title>Isolation of infectious SARS-CoV-2 from urine of a COVID-19 patient.</title>
        <authorList>
            <person name="Sun J."/>
            <person name="Zhu A."/>
            <person name="Li H."/>
            <person name="Zheng K."/>
            <person name="Zhuang Z."/>
            <person name="Chen Z."/>
            <person name="Shi Y."/>
            <person name="Zhang Z."/>
            <person name="Chen S.B."/>
            <person name="Liu X."/>
            <person name="Dai J."/>
            <person name="Li X."/>
            <person name="Huang S."/>
            <person name="Huang X."/>
            <person name="Luo L."/>
            <person name="Wen L."/>
            <person name="Zhuo J."/>
            <person name="Li Y."/>
            <person name="Wang Y."/>
            <person name="Zhang L."/>
            <person name="Zhang Y."/>
            <person name="Li F."/>
            <person name="Feng L."/>
            <person name="Chen X."/>
            <person name="Zhong N."/>
            <person name="Yang Z."/>
            <person name="Huang J."/>
            <person name="Zhao J."/>
            <person name="Li Y.M."/>
        </authorList>
    </citation>
    <scope>NUCLEOTIDE SEQUENCE [GENOMIC RNA]</scope>
</reference>
<reference key="9">
    <citation type="journal article" date="2021" name="Emerg. Microbes Infect.">
        <title>A household case evidences shorter shedding of SARS-CoV-2 in naturally infected cats compared to their human owners.</title>
        <authorList>
            <person name="Neira V."/>
            <person name="Brito B."/>
            <person name="Agueero B."/>
            <person name="Berrios F."/>
            <person name="Valdes V."/>
            <person name="Gutierrez A."/>
            <person name="Ariyama N."/>
            <person name="Espinoza P."/>
            <person name="Retamal P."/>
            <person name="Holmes E.C."/>
            <person name="Gonzalez-Reiche A.S."/>
            <person name="Khan Z."/>
            <person name="van de Guchte A."/>
            <person name="Dutta J."/>
            <person name="Miorin L."/>
            <person name="Kehrer T."/>
            <person name="Galarce N."/>
            <person name="Almonacid L.I."/>
            <person name="Levican J."/>
            <person name="van Bakel H."/>
            <person name="Garcia-Sastre A."/>
            <person name="Medina R.A."/>
        </authorList>
    </citation>
    <scope>NUCLEOTIDE SEQUENCE [GENOMIC RNA]</scope>
</reference>
<reference key="10">
    <citation type="journal article" date="2020" name="Eur. Respir. J.">
        <title>Nosocomial outbreak of COVID-19 pneumonia in Wuhan, China.</title>
        <authorList>
            <person name="Wang X."/>
            <person name="Zhou Q."/>
            <person name="He Y."/>
            <person name="Liu L."/>
            <person name="Ma X."/>
            <person name="Wei X."/>
            <person name="Jiang N."/>
            <person name="Liang L."/>
            <person name="Zheng Y."/>
            <person name="Ma L."/>
            <person name="Xu Y."/>
            <person name="Yang D."/>
            <person name="Zhang J."/>
            <person name="Yang B."/>
            <person name="Jiang N."/>
            <person name="Deng T."/>
            <person name="Zhai B."/>
            <person name="Gao Y."/>
            <person name="Liu W."/>
            <person name="Bai X."/>
            <person name="Pan T."/>
            <person name="Wang G."/>
            <person name="Chang Y."/>
            <person name="Zhang Z."/>
            <person name="Shi H."/>
            <person name="Ma W.L."/>
            <person name="Gao Z."/>
        </authorList>
    </citation>
    <scope>NUCLEOTIDE SEQUENCE [GENOMIC RNA]</scope>
</reference>
<reference key="11">
    <citation type="journal article" date="2020" name="Front. Microbiol.">
        <title>Early Diffusion of SARS-CoV-2 Infection in the Inner Area of the Italian Sardinia Island.</title>
        <authorList>
            <person name="Piras G."/>
            <person name="Grandi N."/>
            <person name="Monne M."/>
            <person name="Asproni R."/>
            <person name="Fancello T."/>
            <person name="Fiamma M."/>
            <person name="Mameli G."/>
            <person name="Casu G."/>
            <person name="Lo Maglio I."/>
            <person name="Palmas A.D."/>
            <person name="Tramontano E."/>
        </authorList>
    </citation>
    <scope>NUCLEOTIDE SEQUENCE [GENOMIC RNA]</scope>
</reference>
<reference key="12">
    <citation type="journal article" date="2020" name="Int. J. Infect. Dis.">
        <title>Viable SARS-CoV-2 in the air of a hospital room with COVID-19 patients.</title>
        <authorList>
            <person name="Lednicky J.A."/>
            <person name="Lauzardo M."/>
            <person name="Fan Z.H."/>
            <person name="Jutla A."/>
            <person name="Tilly T.B."/>
            <person name="Gangwar M."/>
            <person name="Usmani M."/>
            <person name="Shankar S.N."/>
            <person name="Mohamed K."/>
            <person name="Eiguren-Fernandez A."/>
            <person name="Stephenson C.J."/>
            <person name="Alam M.M."/>
            <person name="Elbadry M.A."/>
            <person name="Loeb J.C."/>
            <person name="Subramaniam K."/>
            <person name="Waltzek T.B."/>
            <person name="Cherabuddi K."/>
            <person name="Morris J.G. Jr."/>
            <person name="Wu C.Y."/>
        </authorList>
    </citation>
    <scope>NUCLEOTIDE SEQUENCE [GENOMIC RNA]</scope>
</reference>
<reference key="13">
    <citation type="journal article" date="2020" name="Emerg. Microbes Infect.">
        <title>SARS-CoV-2 genomic surveillance in Taiwan revealed novel ORF8-deletion mutant and clade possibly associated with infections in Middle East.</title>
        <authorList>
            <person name="Gong Y.N."/>
            <person name="Tsao K.C."/>
            <person name="Hsiao M.J."/>
            <person name="Huang C.G."/>
            <person name="Huang P.N."/>
            <person name="Huang P.W."/>
            <person name="Lee K.M."/>
            <person name="Liu Y.C."/>
            <person name="Yang S.L."/>
            <person name="Kuo R.L."/>
            <person name="Chen K.F."/>
            <person name="Liu Y.C."/>
            <person name="Huang S.Y."/>
            <person name="Huang H.I."/>
            <person name="Liu M.T."/>
            <person name="Yang J.R."/>
            <person name="Chiu C.H."/>
            <person name="Yang C.T."/>
            <person name="Chen G.W."/>
            <person name="Shih S.R."/>
        </authorList>
    </citation>
    <scope>NUCLEOTIDE SEQUENCE [GENOMIC RNA]</scope>
</reference>
<reference key="14">
    <citation type="journal article" date="2020" name="J. Virol.">
        <title>An 81-Nucleotide Deletion in SARS-CoV-2 ORF7a Identified from Sentinel Surveillance in Arizona (January to March 2020).</title>
        <authorList>
            <person name="Holland L.A."/>
            <person name="Kaelin E.A."/>
            <person name="Maqsood R."/>
            <person name="Estifanos B."/>
            <person name="Wu L.I."/>
            <person name="Varsani A."/>
            <person name="Halden R.U."/>
            <person name="Hogue B.G."/>
            <person name="Scotch M."/>
            <person name="Lim E.S."/>
        </authorList>
    </citation>
    <scope>NUCLEOTIDE SEQUENCE [GENOMIC RNA]</scope>
</reference>
<reference key="15">
    <citation type="journal article" date="2020" name="Lancet Infect. Dis.">
        <title>Investigation of a COVID-19 outbreak in Germany resulting from a single travel-associated primary case: a case series.</title>
        <authorList>
            <person name="Boehmer M.M."/>
            <person name="Buchholz U."/>
            <person name="Corman V.M."/>
            <person name="Hoch M."/>
            <person name="Katz K."/>
            <person name="Marosevic D.V."/>
            <person name="Boehm S."/>
            <person name="Woudenberg T."/>
            <person name="Ackermann N."/>
            <person name="Konrad R."/>
            <person name="Eberle U."/>
            <person name="Treis B."/>
            <person name="Dangel A."/>
            <person name="Bengs K."/>
            <person name="Fingerle V."/>
            <person name="Berger A."/>
            <person name="Hoermansdorfer S."/>
            <person name="Ippisch S."/>
            <person name="Wicklein B."/>
            <person name="Grahl A."/>
            <person name="Poertner K."/>
            <person name="Muller N."/>
            <person name="Zeitlmann N."/>
            <person name="Boender T.S."/>
            <person name="Cai W."/>
            <person name="Reich A."/>
            <person name="An der Heiden M."/>
            <person name="Rexroth U."/>
            <person name="Hamouda O."/>
            <person name="Schneider J."/>
            <person name="Veith T."/>
            <person name="Muehlemann B."/>
            <person name="Woelfel R."/>
            <person name="Antwerpen M."/>
            <person name="Walter M."/>
            <person name="Protzer U."/>
            <person name="Liebl B."/>
            <person name="Haas W."/>
            <person name="Sing A."/>
            <person name="Drosten C."/>
            <person name="Zapf A."/>
        </authorList>
    </citation>
    <scope>NUCLEOTIDE SEQUENCE [GENOMIC RNA]</scope>
</reference>
<reference key="16">
    <citation type="journal article" date="2020" name="MBio">
        <title>From People to Panthera: Natural SARS-CoV-2 Infection in Tigers and Lions at the Bronx Zoo.</title>
        <authorList>
            <person name="McAloose D."/>
            <person name="Laverack M."/>
            <person name="Wang L."/>
            <person name="Killian M.L."/>
            <person name="Caserta L.C."/>
            <person name="Yuan F."/>
            <person name="Mitchell P.K."/>
            <person name="Queen K."/>
            <person name="Mauldin M.R."/>
            <person name="Cronk B.D."/>
            <person name="Bartlett S.L."/>
            <person name="Sykes J.M."/>
            <person name="Zec S."/>
            <person name="Stokol T."/>
            <person name="Ingerman K."/>
            <person name="Delaney M.A."/>
            <person name="Fredrickson R."/>
            <person name="Ivancic M."/>
            <person name="Jenkins-Moore M."/>
            <person name="Mozingo K."/>
            <person name="Franzen K."/>
            <person name="Bergeson N.H."/>
            <person name="Goodman L."/>
            <person name="Wang H."/>
            <person name="Fang Y."/>
            <person name="Olmstead C."/>
            <person name="McCann C."/>
            <person name="Thomas P."/>
            <person name="Goodrich E."/>
            <person name="Elvinger F."/>
            <person name="Smith D.C."/>
            <person name="Tong S."/>
            <person name="Slavinski S."/>
            <person name="Calle P.P."/>
            <person name="Terio K."/>
            <person name="Torchetti M.K."/>
            <person name="Diel D.G."/>
        </authorList>
    </citation>
    <scope>NUCLEOTIDE SEQUENCE [GENOMIC RNA]</scope>
</reference>
<reference key="17">
    <citation type="journal article" date="2020" name="Microbiol. Resour. Announc.">
        <title>Complete Genome Sequence of a SARS-CoV-2 Strain Isolated in Northern Germany.</title>
        <authorList>
            <person name="Pfefferle S."/>
            <person name="Huang J."/>
            <person name="Noerz D."/>
            <person name="Indenbirken D."/>
            <person name="Luetgehetmann M."/>
            <person name="Oestereich L."/>
            <person name="Guenther T."/>
            <person name="Grundhoff A."/>
            <person name="Aepfelbacher M."/>
            <person name="Fischer N."/>
        </authorList>
    </citation>
    <scope>NUCLEOTIDE SEQUENCE [GENOMIC RNA]</scope>
</reference>
<reference key="18">
    <citation type="journal article" date="2020" name="Nat. Commun.">
        <title>Rapid incorporation of Favipiravir by the fast and permissive viral RNA polymerase complex results in SARS-CoV-2 lethal mutagenesis.</title>
        <authorList>
            <person name="Shannon A."/>
            <person name="Selisko B."/>
            <person name="Le N.T."/>
            <person name="Huchting J."/>
            <person name="Touret F."/>
            <person name="Piorkowski G."/>
            <person name="Fattorini V."/>
            <person name="Ferron F."/>
            <person name="Decroly E."/>
            <person name="Meier C."/>
            <person name="Coutard B."/>
            <person name="Peersen O."/>
            <person name="Canard B."/>
        </authorList>
    </citation>
    <scope>NUCLEOTIDE SEQUENCE [GENOMIC RNA]</scope>
</reference>
<reference key="19">
    <citation type="journal article" date="2020" name="Nature">
        <title>A new coronavirus associated with human respiratory disease in China.</title>
        <authorList>
            <person name="Wu F."/>
            <person name="Zhao S."/>
            <person name="Yu B."/>
            <person name="Chen Y.-M."/>
            <person name="Wang W."/>
            <person name="Song Z.-G."/>
            <person name="Hu Y."/>
            <person name="Tao Z.-W."/>
            <person name="Tian J.-H."/>
            <person name="Pei Y.-Y."/>
            <person name="Yuan M.-L."/>
            <person name="Zhang Y.-L."/>
            <person name="Dai F.-H."/>
            <person name="Liu Y."/>
            <person name="Wang Q.-M."/>
            <person name="Zheng J.-J."/>
            <person name="Xu L."/>
            <person name="Holmes E.C."/>
            <person name="Zhang Y.-Z."/>
        </authorList>
    </citation>
    <scope>NUCLEOTIDE SEQUENCE [LARGE SCALE GENOMIC DNA]</scope>
</reference>
<reference key="20">
    <citation type="journal article" date="2020" name="Nature">
        <title>Discovery of SARS-CoV-2 antiviral drugs through large-scale compound repurposing.</title>
        <authorList>
            <person name="Riva L."/>
            <person name="Yuan S."/>
            <person name="Yin X."/>
            <person name="Martin-Sancho L."/>
            <person name="Matsunaga N."/>
            <person name="Pache L."/>
            <person name="Burgstaller-Muehlbacher S."/>
            <person name="De Jesus P.D."/>
            <person name="Teriete P."/>
            <person name="Hull M.V."/>
            <person name="Chang M.W."/>
            <person name="Chan J.F."/>
            <person name="Cao J."/>
            <person name="Poon V.K."/>
            <person name="Herbert K.M."/>
            <person name="Cheng K."/>
            <person name="Nguyen T.H."/>
            <person name="Rubanov A."/>
            <person name="Pu Y."/>
            <person name="Nguyen C."/>
            <person name="Choi A."/>
            <person name="Rathnasinghe R."/>
            <person name="Schotsaert M."/>
            <person name="Miorin L."/>
            <person name="Dejosez M."/>
            <person name="Zwaka T.P."/>
            <person name="Sit K.Y."/>
            <person name="Martinez-Sobrido L."/>
            <person name="Liu W.C."/>
            <person name="White K.M."/>
            <person name="Chapman M.E."/>
            <person name="Lendy E.K."/>
            <person name="Glynne R.J."/>
            <person name="Albrecht R."/>
            <person name="Ruppin E."/>
            <person name="Mesecar A.D."/>
            <person name="Johnson J.R."/>
            <person name="Benner C."/>
            <person name="Sun R."/>
            <person name="Schultz P.G."/>
            <person name="Su A.I."/>
            <person name="Garcia-Sastre A."/>
            <person name="Chatterjee A.K."/>
            <person name="Yuen K.Y."/>
            <person name="Chanda S.K."/>
        </authorList>
    </citation>
    <scope>NUCLEOTIDE SEQUENCE [GENOMIC RNA]</scope>
</reference>
<reference key="21">
    <citation type="journal article" date="2020" name="Nature">
        <title>A mouse-adapted model of SARS-CoV-2 to test COVID-19 countermeasures.</title>
        <authorList>
            <person name="Dinnon K.H. III"/>
            <person name="Leist S.R."/>
            <person name="Schaefer A."/>
            <person name="Edwards C.E."/>
            <person name="Martinez D.R."/>
            <person name="Montgomery S.A."/>
            <person name="West A."/>
            <person name="Yount B.L. Jr."/>
            <person name="Hou Y.J."/>
            <person name="Adams L.E."/>
            <person name="Gully K.L."/>
            <person name="Brown A.J."/>
            <person name="Huang E."/>
            <person name="Bryant M.D."/>
            <person name="Choong I.C."/>
            <person name="Glenn J.S."/>
            <person name="Gralinski L.E."/>
            <person name="Sheahan T.P."/>
            <person name="Baric R.S."/>
        </authorList>
    </citation>
    <scope>NUCLEOTIDE SEQUENCE [GENOMIC RNA]</scope>
</reference>
<reference key="22">
    <citation type="journal article" date="2020" name="Nature">
        <title>Infection of dogs with SARS-CoV-2.</title>
        <authorList>
            <person name="Sit T.H.C."/>
            <person name="Brackman C.J."/>
            <person name="Ip S.M."/>
            <person name="Tam K.W.S."/>
            <person name="Law P.Y.T."/>
            <person name="To E.M.W."/>
            <person name="Yu V.Y.T."/>
            <person name="Sims L.D."/>
            <person name="Tsang D.N.C."/>
            <person name="Chu D.K.W."/>
            <person name="Perera R.A.P.M."/>
            <person name="Poon L.L.M."/>
            <person name="Peiris M."/>
        </authorList>
    </citation>
    <scope>NUCLEOTIDE SEQUENCE [GENOMIC RNA]</scope>
</reference>
<reference key="23">
    <citation type="journal article" date="2020" name="Science">
        <title>Neuropilin-1 facilitates SARS-CoV-2 cell entry and infectivity.</title>
        <authorList>
            <person name="Cantuti-Castelvetri L."/>
            <person name="Ojha R."/>
            <person name="Pedro L.D."/>
            <person name="Djannatian M."/>
            <person name="Franz J."/>
            <person name="Kuivanen S."/>
            <person name="van der Meer F."/>
            <person name="Kallio K."/>
            <person name="Kaya T."/>
            <person name="Anastasina M."/>
            <person name="Smura T."/>
            <person name="Levanov L."/>
            <person name="Szirovicza L."/>
            <person name="Tobi A."/>
            <person name="Kallio-Kokko H."/>
            <person name="Oesterlund P."/>
            <person name="Joensuu M."/>
            <person name="Meunier F.A."/>
            <person name="Butcher S.J."/>
            <person name="Winkler M.S."/>
            <person name="Mollenhauer B."/>
            <person name="Helenius A."/>
            <person name="Gokce O."/>
            <person name="Teesalu T."/>
            <person name="Hepojoki J."/>
            <person name="Vapalahti O."/>
            <person name="Stadelmann C."/>
            <person name="Balistreri G."/>
            <person name="Simons M."/>
        </authorList>
    </citation>
    <scope>NUCLEOTIDE SEQUENCE [GENOMIC RNA]</scope>
</reference>
<reference evidence="7" key="24">
    <citation type="journal article" date="2020" name="Science">
        <title>Development of an inactivated vaccine candidate for SARS-CoV-2.</title>
        <authorList>
            <person name="Gao Q."/>
            <person name="Bao L."/>
            <person name="Mao H."/>
            <person name="Wang L."/>
            <person name="Xu K."/>
            <person name="Yang M."/>
            <person name="Li Y."/>
            <person name="Zhu L."/>
            <person name="Wang N."/>
            <person name="Lv Z."/>
            <person name="Gao H."/>
            <person name="Ge X."/>
            <person name="Kan B."/>
            <person name="Hu Y."/>
            <person name="Liu J."/>
            <person name="Cai F."/>
            <person name="Jiang D."/>
            <person name="Yin Y."/>
            <person name="Qin C."/>
            <person name="Li J."/>
            <person name="Gong X."/>
            <person name="Lou X."/>
            <person name="Shi W."/>
            <person name="Wu D."/>
            <person name="Zhang H."/>
            <person name="Zhu L."/>
            <person name="Deng W."/>
            <person name="Li Y."/>
            <person name="Lu J."/>
            <person name="Li C."/>
            <person name="Wang X."/>
            <person name="Yin W."/>
            <person name="Zhang Y."/>
            <person name="Qin C."/>
        </authorList>
    </citation>
    <scope>NUCLEOTIDE SEQUENCE [GENOMIC RNA]</scope>
</reference>
<reference key="25">
    <citation type="journal article" date="2020" name="Vaccines">
        <title>Cold-Adapted Live Attenuated SARS-Cov-2 Vaccine Completely Protects Human ACE2 Transgenic Mice from SARS-Cov-2 Infection.</title>
        <authorList>
            <person name="Seo S.H."/>
            <person name="Jang Y."/>
        </authorList>
    </citation>
    <scope>NUCLEOTIDE SEQUENCE [GENOMIC RNA]</scope>
</reference>
<reference key="26">
    <citation type="journal article" date="2021" name="Clin. Infect. Dis.">
        <title>Emergence of a Severe Acute Respiratory Syndrome Coronavirus 2 Virus Variant With Novel Genomic Architecture in Hong Kong.</title>
        <authorList>
            <person name="Tse H."/>
            <person name="Lung D.C."/>
            <person name="Wong S.C."/>
            <person name="Ip K.F."/>
            <person name="Wu T.C."/>
            <person name="To K.K."/>
            <person name="Kok K.H."/>
            <person name="Yuen K.Y."/>
            <person name="Choi G.K."/>
        </authorList>
    </citation>
    <scope>NUCLEOTIDE SEQUENCE [GENOMIC RNA]</scope>
</reference>
<reference key="27">
    <citation type="journal article" date="2021" name="Emerg. Infect. Dis.">
        <title>Territorywide Study of Early Coronavirus Disease Outbreak, Hong Kong, China.</title>
        <authorList>
            <person name="Leung K.S."/>
            <person name="Ng T.T."/>
            <person name="Wu A.K."/>
            <person name="Yau M.C."/>
            <person name="Lao H.Y."/>
            <person name="Choi M.P."/>
            <person name="Tam K.K."/>
            <person name="Lee L.K."/>
            <person name="Wong B.K."/>
            <person name="Man Ho A.Y."/>
            <person name="Yip K.T."/>
            <person name="Lung K.C."/>
            <person name="Liu R.W."/>
            <person name="Tso E.Y."/>
            <person name="Leung W.S."/>
            <person name="Chan M.C."/>
            <person name="Ng Y.Y."/>
            <person name="Sin K.M."/>
            <person name="Fung K.S."/>
            <person name="Chau S.K."/>
            <person name="To W.K."/>
            <person name="Que T.L."/>
            <person name="Shum D.H."/>
            <person name="Yip S.P."/>
            <person name="Yam W.C."/>
            <person name="Siu G.K."/>
        </authorList>
    </citation>
    <scope>NUCLEOTIDE SEQUENCE [GENOMIC RNA]</scope>
</reference>
<reference evidence="8" key="28">
    <citation type="journal article" date="2021" name="JAMA">
        <title>SARS-CoV-2 Positivity on or After 9 Days Among Quarantined Student Contacts of Confirmed Cases.</title>
        <authorList>
            <person name="Nelson E.J."/>
            <person name="McKune S.L."/>
            <person name="Ryan K.A."/>
            <person name="Lednicky J.A."/>
            <person name="Crowe S.R."/>
            <person name="Myers P.D."/>
            <person name="Morris J.G. Jr."/>
        </authorList>
    </citation>
    <scope>NUCLEOTIDE SEQUENCE [GENOMIC RNA]</scope>
</reference>
<reference key="29">
    <citation type="journal article" date="2021" name="Microbiol. Resour. Announc.">
        <title>In-Frame 12-Nucleotide Deletion within Open Reading Frame 3a in a SARS-CoV-2 Strain Isolated from a Patient Hospitalized with COVID-19.</title>
        <authorList>
            <person name="Lednicky J.A."/>
            <person name="Cherabuddi K."/>
            <person name="Tagliamonte M.S."/>
            <person name="Elbadry M.A."/>
            <person name="Subramaniam K."/>
            <person name="Waltzek T.B."/>
            <person name="Morris J.G. Jr."/>
        </authorList>
    </citation>
    <scope>NUCLEOTIDE SEQUENCE [GENOMIC RNA]</scope>
</reference>
<reference key="30">
    <citation type="journal article" date="2021" name="MSphere">
        <title>An Observational Laboratory-Based Assessment of SARS-CoV-2 Molecular Diagnostics in Benin, Western Africa.</title>
        <authorList>
            <person name="Sander A.L."/>
            <person name="Yadouleton A."/>
            <person name="Moreira-Soto A."/>
            <person name="Tchibozo C."/>
            <person name="Hounkanrin G."/>
            <person name="Badou Y."/>
            <person name="Fischer C."/>
            <person name="Krause N."/>
            <person name="Akogbeto P."/>
            <person name="de Oliveira Filho E.F."/>
            <person name="Dossou A."/>
            <person name="Bruenink S."/>
            <person name="Drosten C."/>
            <person name="Aissi M.A.J."/>
            <person name="Harouna Djingarey M."/>
            <person name="Hounkpatin B."/>
            <person name="Nagel M."/>
            <person name="Drexler J.F."/>
        </authorList>
    </citation>
    <scope>NUCLEOTIDE SEQUENCE [GENOMIC RNA]</scope>
</reference>
<reference key="31">
    <citation type="journal article" date="2021" name="MSphere">
        <title>Molecular Evolution of Human Coronavirus 229E in Hong Kong and a Fatal COVID-19 Case Involving Coinfection with a Novel Human Coronavirus 229E Genogroup.</title>
        <authorList>
            <person name="Lau S.K.P."/>
            <person name="Lung D.C."/>
            <person name="Wong E.Y.M."/>
            <person name="Aw-Yong K.L."/>
            <person name="Wong A.C.P."/>
            <person name="Luk H.K.H."/>
            <person name="Li K.S.M."/>
            <person name="Fung J."/>
            <person name="Chan T.T.Y."/>
            <person name="Tang J.Y.M."/>
            <person name="Zhu L."/>
            <person name="Yip C.C.Y."/>
            <person name="Wong S.C.Y."/>
            <person name="Lee R.A."/>
            <person name="Tsang O.T.Y."/>
            <person name="Yuen K.Y."/>
            <person name="Woo P.C.Y."/>
        </authorList>
    </citation>
    <scope>NUCLEOTIDE SEQUENCE [GENOMIC RNA]</scope>
</reference>
<reference key="32">
    <citation type="journal article" date="2021" name="PLoS ONE">
        <title>Genomic variation and epidemiology of SARS-CoV-2 importation and early circulation in Israel.</title>
        <authorList>
            <person name="Zuckerman N.S."/>
            <person name="Bucris E."/>
            <person name="Drori Y."/>
            <person name="Erster O."/>
            <person name="Sofer D."/>
            <person name="Pando R."/>
            <person name="Mendelson E."/>
            <person name="Mor O."/>
            <person name="Mandelboim M."/>
        </authorList>
    </citation>
    <scope>NUCLEOTIDE SEQUENCE [GENOMIC RNA]</scope>
</reference>
<reference key="33">
    <citation type="journal article" date="2021" name="Transbound. Emerg. Dis.">
        <title>A deletion in SARS-CoV-2 ORF7 identified in COVID-19 outbreak in Uruguay.</title>
        <authorList>
            <person name="Panzera Y."/>
            <person name="Ramos N."/>
            <person name="Frabasile S."/>
            <person name="Calleros L."/>
            <person name="Marandino A."/>
            <person name="Tomas G."/>
            <person name="Techera C."/>
            <person name="Grecco S."/>
            <person name="Fuques E."/>
            <person name="Goni N."/>
            <person name="Ramas V."/>
            <person name="Coppola L."/>
            <person name="Chiparelli H."/>
            <person name="Sorhouet C."/>
            <person name="Mogdasy C."/>
            <person name="Arbiza J."/>
            <person name="Delfraro A."/>
            <person name="Perez R."/>
        </authorList>
    </citation>
    <scope>NUCLEOTIDE SEQUENCE [GENOMIC RNA]</scope>
</reference>
<reference key="34">
    <citation type="journal article" date="2021" name="Viruses">
        <title>Berberine and Obatoclax Inhibit SARS-Cov-2 Replication in Primary Human Nasal Epithelial Cells In Vitro.</title>
        <authorList>
            <person name="Varghese F.S."/>
            <person name="van Woudenbergh E."/>
            <person name="Overheul G.J."/>
            <person name="Eleveld M.J."/>
            <person name="Kurver L."/>
            <person name="van Heerbeek N."/>
            <person name="van Laarhoven A."/>
            <person name="Miesen P."/>
            <person name="den Hartog G."/>
            <person name="de Jonge M.I."/>
            <person name="van Rij R.P."/>
        </authorList>
    </citation>
    <scope>NUCLEOTIDE SEQUENCE [GENOMIC RNA]</scope>
</reference>
<reference key="35">
    <citation type="journal article" date="2021" name="PLoS Biol.">
        <title>A plasmid DNA-launched SARS-CoV-2 reverse genetics system and coronavirus toolkit for COVID-19 research.</title>
        <authorList>
            <person name="Rihn S.J."/>
            <person name="Merits A."/>
            <person name="Bakshi S."/>
            <person name="Turnbull M.L."/>
            <person name="Wickenhagen A."/>
            <person name="Alexander A.J.T."/>
            <person name="Baillie C."/>
            <person name="Brennan B."/>
            <person name="Brown F."/>
            <person name="Brunker K."/>
            <person name="Bryden S.R."/>
            <person name="Burness K.A."/>
            <person name="Carmichael S."/>
            <person name="Cole S.J."/>
            <person name="Cowton V.M."/>
            <person name="Davies P."/>
            <person name="Davis C."/>
            <person name="De Lorenzo G."/>
            <person name="Donald C.L."/>
            <person name="Dorward M."/>
            <person name="Dunlop J.I."/>
            <person name="Elliott M."/>
            <person name="Fares M."/>
            <person name="da Silva Filipe A."/>
            <person name="Freitas J.R."/>
            <person name="Furnon W."/>
            <person name="Gestuveo R.J."/>
            <person name="Geyer A."/>
            <person name="Giesel D."/>
            <person name="Goldfarb D.M."/>
            <person name="Goodman N."/>
            <person name="Gunson R."/>
            <person name="Hastie C.J."/>
            <person name="Herder V."/>
            <person name="Hughes J."/>
            <person name="Johnson C."/>
            <person name="Johnson N."/>
            <person name="Kohl A."/>
            <person name="Kerr K."/>
            <person name="Leech H."/>
            <person name="Lello L.S."/>
            <person name="Li K."/>
            <person name="Lieber G."/>
            <person name="Liu X."/>
            <person name="Lingala R."/>
            <person name="Loney C."/>
            <person name="Mair D."/>
            <person name="McElwee M.J."/>
            <person name="McFarlane S."/>
            <person name="Nichols J."/>
            <person name="Nomikou K."/>
            <person name="Orr A."/>
            <person name="Orton R.J."/>
            <person name="Palmarini M."/>
            <person name="Parr Y.A."/>
            <person name="Pinto R.M."/>
            <person name="Raggett S."/>
            <person name="Reid E."/>
            <person name="Robertson D.L."/>
            <person name="Royle J."/>
            <person name="Cameron-Ruiz N."/>
            <person name="Shepherd J.G."/>
            <person name="Smollett K."/>
            <person name="Stewart D.G."/>
            <person name="Stewart M."/>
            <person name="Sugrue E."/>
            <person name="Szemiel A.M."/>
            <person name="Taggart A."/>
            <person name="Thomson E.C."/>
            <person name="Tong L."/>
            <person name="Torrie L.S."/>
            <person name="Toth R."/>
            <person name="Varjak M."/>
            <person name="Wang S."/>
            <person name="Wilkinson S.G."/>
            <person name="Wyatt P.G."/>
            <person name="Zusinaite E."/>
            <person name="Alessi D.R."/>
            <person name="Patel A.H."/>
            <person name="Zaid A."/>
            <person name="Wilson S.J."/>
            <person name="Mahalingam S."/>
        </authorList>
    </citation>
    <scope>NUCLEOTIDE SEQUENCE [GENOMIC RNA]</scope>
</reference>
<reference key="36">
    <citation type="journal article" date="2021" name="PLoS ONE">
        <title>Earliest detection to date of SARS-CoV-2 in Florida: Identification together with influenza virus on the main entry door of a university building, February 2020.</title>
        <authorList>
            <person name="Lednicky J."/>
            <person name="Salemi M."/>
            <person name="Subramaniam K."/>
            <person name="Waltzek T.B."/>
            <person name="Sabo-Attwood T."/>
            <person name="Loeb J.C."/>
            <person name="Hentschel S."/>
            <person name="Tagliamonte M.S."/>
            <person name="Marini S."/>
            <person name="Alam M.M."/>
            <person name="Stephenson C.J."/>
            <person name="Elbadry M."/>
            <person name="Morris J.G. Jr."/>
        </authorList>
    </citation>
    <scope>NUCLEOTIDE SEQUENCE [GENOMIC RNA]</scope>
</reference>
<reference key="37">
    <citation type="journal article" date="2020" name="PLoS Pathog.">
        <title>The SARS-CoV-2 ORF10 is not essential in vitro or in vivo in humans.</title>
        <authorList>
            <person name="Pancer K."/>
            <person name="Milewska A."/>
            <person name="Owczarek K."/>
            <person name="Dabrowska A."/>
            <person name="Kowalski M."/>
            <person name="Labaj P.P."/>
            <person name="Branicki W."/>
            <person name="Sanak M."/>
            <person name="Pyrc K."/>
        </authorList>
    </citation>
    <scope>CAUTION</scope>
</reference>
<reference key="38">
    <citation type="journal article" date="2021" name="Proc. Natl. Acad. Sci. U.S.A.">
        <title>ORF10-Cullin-2-ZYG11B complex is not required for SARS-CoV-2 infection.</title>
        <authorList>
            <person name="Mena E.L."/>
            <person name="Donahue C.J."/>
            <person name="Vaites L.P."/>
            <person name="Li J."/>
            <person name="Rona G."/>
            <person name="O'Leary C."/>
            <person name="Lignitto L."/>
            <person name="Miwatani-Minter B."/>
            <person name="Paulo J.A."/>
            <person name="Dhabaria A."/>
            <person name="Ueberheide B."/>
            <person name="Gygi S.P."/>
            <person name="Pagano M."/>
            <person name="Harper J.W."/>
            <person name="Davey R.A."/>
            <person name="Elledge S.J."/>
        </authorList>
    </citation>
    <scope>CAUTION</scope>
    <scope>SUBUNIT</scope>
</reference>
<reference key="39">
    <citation type="journal article" date="2021" name="Genome Res.">
        <title>Subgenomic RNA identification in SARS-CoV-2 genomic sequencing data.</title>
        <authorList>
            <consortium name="COVID-19 Genomics UK (COG-UK) Consortium"/>
            <person name="Parker M.D."/>
            <person name="Lindsey B.B."/>
            <person name="Leary S."/>
            <person name="Gaudieri S."/>
            <person name="Chopra A."/>
            <person name="Wyles M."/>
            <person name="Angyal A."/>
            <person name="Green L.R."/>
            <person name="Parsons P."/>
            <person name="Tucker R.M."/>
            <person name="Brown R."/>
            <person name="Groves D."/>
            <person name="Johnson K."/>
            <person name="Carrilero L."/>
            <person name="Heffer J."/>
            <person name="Partridge D.G."/>
            <person name="Evans C."/>
            <person name="Raza M."/>
            <person name="Keeley A.J."/>
            <person name="Smith N."/>
            <person name="Filipe A.D.S."/>
            <person name="Shepherd J.G."/>
            <person name="Davis C."/>
            <person name="Bennett S."/>
            <person name="Sreenu V.B."/>
            <person name="Kohl A."/>
            <person name="Aranday-Cortes E."/>
            <person name="Tong L."/>
            <person name="Nichols J."/>
            <person name="Thomson E.C."/>
            <person name="Wang D."/>
            <person name="Mallal S."/>
            <person name="de Silva T.I."/>
        </authorList>
    </citation>
    <scope>CAUTION</scope>
</reference>
<reference key="40">
    <citation type="journal article" date="2022" name="Biochem. Biophys. Res. Commun.">
        <title>Structural insights into ORF10 recognition by ZYG11B.</title>
        <authorList>
            <person name="Zhang B."/>
            <person name="Li Y."/>
            <person name="Feng Q."/>
            <person name="Song L."/>
            <person name="Dong C."/>
            <person name="Yan X."/>
        </authorList>
    </citation>
    <scope>INTERACTION WITH HOST ZYG11B</scope>
</reference>
<name>ORF10_SARS2</name>
<sequence>MGYINVFAFPFTIYSLLLCRMNSRNYIAQVDVVNFNLT</sequence>
<evidence type="ECO:0000269" key="1">
    <source>
    </source>
</evidence>
<evidence type="ECO:0000269" key="2">
    <source>
    </source>
</evidence>
<evidence type="ECO:0000269" key="3">
    <source>
    </source>
</evidence>
<evidence type="ECO:0000269" key="4">
    <source>
    </source>
</evidence>
<evidence type="ECO:0000305" key="5">
    <source>
    </source>
</evidence>
<evidence type="ECO:0000312" key="6">
    <source>
        <dbReference type="EMBL" id="QHI42199.1"/>
    </source>
</evidence>
<evidence type="ECO:0000312" key="7">
    <source>
        <dbReference type="EMBL" id="QKE23228.1"/>
    </source>
</evidence>
<evidence type="ECO:0000312" key="8">
    <source>
        <dbReference type="EMBL" id="QPJ75794.1"/>
    </source>
</evidence>
<evidence type="ECO:0000312" key="9">
    <source>
        <dbReference type="Proteomes" id="UP000464024"/>
    </source>
</evidence>
<protein>
    <recommendedName>
        <fullName evidence="5">Putative ORF10 protein</fullName>
    </recommendedName>
</protein>
<keyword id="KW-0002">3D-structure</keyword>
<keyword id="KW-1185">Reference proteome</keyword>